<sequence length="393" mass="43653">MEEPQSDPSVEPPLSQETFSDLWKLLPENNVLSPLPSQAMDDLMLSPDDIEQWFTEDPGPDEAPRMPEAAPPVAPAPAAPTPAAPAPAPSWPLSSSVPSQKTYQGSYGFRLGFLHSGTAKSVTCTYSPALNKMFCQLAKTCPVQLWVDSTPPPGTRVRAMAIYKQSQHMTEVVRRCPHHERCSDSDGLAPPQHLIRVEGNLRVEYLDDRNTFRHSVVVPYEPPEVGSDCTTIHYNYMCNSSCMGGMNRRPILTIITLEDSSGNLLGRNSFEVRVCACPGRDRRTEEENLRKKGEPHHELPPGSTKRALPNNTSSSPQPKKKPLDGEYFTLQIRGRERFEMFRELNEALELKDAQAGKEPGGSRAHSSHLKSKKGQSTSRHKKLMFKTEGPDSD</sequence>
<name>P53_HUMAN</name>
<evidence type="ECO:0000250" key="1"/>
<evidence type="ECO:0000250" key="2">
    <source>
        <dbReference type="UniProtKB" id="P02340"/>
    </source>
</evidence>
<evidence type="ECO:0000250" key="3">
    <source>
        <dbReference type="UniProtKB" id="P10361"/>
    </source>
</evidence>
<evidence type="ECO:0000256" key="4">
    <source>
        <dbReference type="SAM" id="MobiDB-lite"/>
    </source>
</evidence>
<evidence type="ECO:0000269" key="5">
    <source>
    </source>
</evidence>
<evidence type="ECO:0000269" key="6">
    <source>
    </source>
</evidence>
<evidence type="ECO:0000269" key="7">
    <source>
    </source>
</evidence>
<evidence type="ECO:0000269" key="8">
    <source>
    </source>
</evidence>
<evidence type="ECO:0000269" key="9">
    <source>
    </source>
</evidence>
<evidence type="ECO:0000269" key="10">
    <source>
    </source>
</evidence>
<evidence type="ECO:0000269" key="11">
    <source>
    </source>
</evidence>
<evidence type="ECO:0000269" key="12">
    <source>
    </source>
</evidence>
<evidence type="ECO:0000269" key="13">
    <source>
    </source>
</evidence>
<evidence type="ECO:0000269" key="14">
    <source>
    </source>
</evidence>
<evidence type="ECO:0000269" key="15">
    <source>
    </source>
</evidence>
<evidence type="ECO:0000269" key="16">
    <source>
    </source>
</evidence>
<evidence type="ECO:0000269" key="17">
    <source>
    </source>
</evidence>
<evidence type="ECO:0000269" key="18">
    <source>
    </source>
</evidence>
<evidence type="ECO:0000269" key="19">
    <source>
    </source>
</evidence>
<evidence type="ECO:0000269" key="20">
    <source>
    </source>
</evidence>
<evidence type="ECO:0000269" key="21">
    <source>
    </source>
</evidence>
<evidence type="ECO:0000269" key="22">
    <source>
    </source>
</evidence>
<evidence type="ECO:0000269" key="23">
    <source>
    </source>
</evidence>
<evidence type="ECO:0000269" key="24">
    <source>
    </source>
</evidence>
<evidence type="ECO:0000269" key="25">
    <source>
    </source>
</evidence>
<evidence type="ECO:0000269" key="26">
    <source>
    </source>
</evidence>
<evidence type="ECO:0000269" key="27">
    <source>
    </source>
</evidence>
<evidence type="ECO:0000269" key="28">
    <source>
    </source>
</evidence>
<evidence type="ECO:0000269" key="29">
    <source>
    </source>
</evidence>
<evidence type="ECO:0000269" key="30">
    <source>
    </source>
</evidence>
<evidence type="ECO:0000269" key="31">
    <source>
    </source>
</evidence>
<evidence type="ECO:0000269" key="32">
    <source>
    </source>
</evidence>
<evidence type="ECO:0000269" key="33">
    <source>
    </source>
</evidence>
<evidence type="ECO:0000269" key="34">
    <source>
    </source>
</evidence>
<evidence type="ECO:0000269" key="35">
    <source>
    </source>
</evidence>
<evidence type="ECO:0000269" key="36">
    <source>
    </source>
</evidence>
<evidence type="ECO:0000269" key="37">
    <source>
    </source>
</evidence>
<evidence type="ECO:0000269" key="38">
    <source>
    </source>
</evidence>
<evidence type="ECO:0000269" key="39">
    <source>
    </source>
</evidence>
<evidence type="ECO:0000269" key="40">
    <source>
    </source>
</evidence>
<evidence type="ECO:0000269" key="41">
    <source>
    </source>
</evidence>
<evidence type="ECO:0000269" key="42">
    <source>
    </source>
</evidence>
<evidence type="ECO:0000269" key="43">
    <source>
    </source>
</evidence>
<evidence type="ECO:0000269" key="44">
    <source>
    </source>
</evidence>
<evidence type="ECO:0000269" key="45">
    <source>
    </source>
</evidence>
<evidence type="ECO:0000269" key="46">
    <source>
    </source>
</evidence>
<evidence type="ECO:0000269" key="47">
    <source>
    </source>
</evidence>
<evidence type="ECO:0000269" key="48">
    <source>
    </source>
</evidence>
<evidence type="ECO:0000269" key="49">
    <source>
    </source>
</evidence>
<evidence type="ECO:0000269" key="50">
    <source>
    </source>
</evidence>
<evidence type="ECO:0000269" key="51">
    <source>
    </source>
</evidence>
<evidence type="ECO:0000269" key="52">
    <source>
    </source>
</evidence>
<evidence type="ECO:0000269" key="53">
    <source>
    </source>
</evidence>
<evidence type="ECO:0000269" key="54">
    <source>
    </source>
</evidence>
<evidence type="ECO:0000269" key="55">
    <source>
    </source>
</evidence>
<evidence type="ECO:0000269" key="56">
    <source>
    </source>
</evidence>
<evidence type="ECO:0000269" key="57">
    <source>
    </source>
</evidence>
<evidence type="ECO:0000269" key="58">
    <source>
    </source>
</evidence>
<evidence type="ECO:0000269" key="59">
    <source>
    </source>
</evidence>
<evidence type="ECO:0000269" key="60">
    <source>
    </source>
</evidence>
<evidence type="ECO:0000269" key="61">
    <source>
    </source>
</evidence>
<evidence type="ECO:0000269" key="62">
    <source>
    </source>
</evidence>
<evidence type="ECO:0000269" key="63">
    <source>
    </source>
</evidence>
<evidence type="ECO:0000269" key="64">
    <source>
    </source>
</evidence>
<evidence type="ECO:0000269" key="65">
    <source>
    </source>
</evidence>
<evidence type="ECO:0000269" key="66">
    <source>
    </source>
</evidence>
<evidence type="ECO:0000269" key="67">
    <source>
    </source>
</evidence>
<evidence type="ECO:0000269" key="68">
    <source>
    </source>
</evidence>
<evidence type="ECO:0000269" key="69">
    <source>
    </source>
</evidence>
<evidence type="ECO:0000269" key="70">
    <source>
    </source>
</evidence>
<evidence type="ECO:0000269" key="71">
    <source>
    </source>
</evidence>
<evidence type="ECO:0000269" key="72">
    <source>
    </source>
</evidence>
<evidence type="ECO:0000269" key="73">
    <source>
    </source>
</evidence>
<evidence type="ECO:0000269" key="74">
    <source>
    </source>
</evidence>
<evidence type="ECO:0000269" key="75">
    <source>
    </source>
</evidence>
<evidence type="ECO:0000269" key="76">
    <source>
    </source>
</evidence>
<evidence type="ECO:0000269" key="77">
    <source>
    </source>
</evidence>
<evidence type="ECO:0000269" key="78">
    <source>
    </source>
</evidence>
<evidence type="ECO:0000269" key="79">
    <source>
    </source>
</evidence>
<evidence type="ECO:0000269" key="80">
    <source>
    </source>
</evidence>
<evidence type="ECO:0000269" key="81">
    <source>
    </source>
</evidence>
<evidence type="ECO:0000269" key="82">
    <source>
    </source>
</evidence>
<evidence type="ECO:0000269" key="83">
    <source>
    </source>
</evidence>
<evidence type="ECO:0000269" key="84">
    <source>
    </source>
</evidence>
<evidence type="ECO:0000269" key="85">
    <source>
    </source>
</evidence>
<evidence type="ECO:0000269" key="86">
    <source>
    </source>
</evidence>
<evidence type="ECO:0000269" key="87">
    <source>
    </source>
</evidence>
<evidence type="ECO:0000269" key="88">
    <source>
    </source>
</evidence>
<evidence type="ECO:0000269" key="89">
    <source>
    </source>
</evidence>
<evidence type="ECO:0000269" key="90">
    <source>
    </source>
</evidence>
<evidence type="ECO:0000269" key="91">
    <source>
    </source>
</evidence>
<evidence type="ECO:0000269" key="92">
    <source>
    </source>
</evidence>
<evidence type="ECO:0000269" key="93">
    <source>
    </source>
</evidence>
<evidence type="ECO:0000269" key="94">
    <source>
    </source>
</evidence>
<evidence type="ECO:0000269" key="95">
    <source>
    </source>
</evidence>
<evidence type="ECO:0000269" key="96">
    <source>
    </source>
</evidence>
<evidence type="ECO:0000269" key="97">
    <source>
    </source>
</evidence>
<evidence type="ECO:0000269" key="98">
    <source>
    </source>
</evidence>
<evidence type="ECO:0000269" key="99">
    <source>
    </source>
</evidence>
<evidence type="ECO:0000269" key="100">
    <source>
    </source>
</evidence>
<evidence type="ECO:0000269" key="101">
    <source>
    </source>
</evidence>
<evidence type="ECO:0000269" key="102">
    <source>
    </source>
</evidence>
<evidence type="ECO:0000269" key="103">
    <source>
    </source>
</evidence>
<evidence type="ECO:0000269" key="104">
    <source>
    </source>
</evidence>
<evidence type="ECO:0000269" key="105">
    <source>
    </source>
</evidence>
<evidence type="ECO:0000269" key="106">
    <source>
    </source>
</evidence>
<evidence type="ECO:0000269" key="107">
    <source>
    </source>
</evidence>
<evidence type="ECO:0000269" key="108">
    <source>
    </source>
</evidence>
<evidence type="ECO:0000269" key="109">
    <source>
    </source>
</evidence>
<evidence type="ECO:0000269" key="110">
    <source>
    </source>
</evidence>
<evidence type="ECO:0000269" key="111">
    <source>
    </source>
</evidence>
<evidence type="ECO:0000269" key="112">
    <source>
    </source>
</evidence>
<evidence type="ECO:0000269" key="113">
    <source>
    </source>
</evidence>
<evidence type="ECO:0000269" key="114">
    <source>
    </source>
</evidence>
<evidence type="ECO:0000269" key="115">
    <source>
    </source>
</evidence>
<evidence type="ECO:0000269" key="116">
    <source>
    </source>
</evidence>
<evidence type="ECO:0000269" key="117">
    <source>
    </source>
</evidence>
<evidence type="ECO:0000269" key="118">
    <source>
    </source>
</evidence>
<evidence type="ECO:0000269" key="119">
    <source>
    </source>
</evidence>
<evidence type="ECO:0000269" key="120">
    <source>
    </source>
</evidence>
<evidence type="ECO:0000269" key="121">
    <source>
    </source>
</evidence>
<evidence type="ECO:0000269" key="122">
    <source>
    </source>
</evidence>
<evidence type="ECO:0000269" key="123">
    <source>
    </source>
</evidence>
<evidence type="ECO:0000269" key="124">
    <source>
    </source>
</evidence>
<evidence type="ECO:0000269" key="125">
    <source>
    </source>
</evidence>
<evidence type="ECO:0000269" key="126">
    <source>
    </source>
</evidence>
<evidence type="ECO:0000269" key="127">
    <source>
    </source>
</evidence>
<evidence type="ECO:0000269" key="128">
    <source>
    </source>
</evidence>
<evidence type="ECO:0000269" key="129">
    <source>
    </source>
</evidence>
<evidence type="ECO:0000269" key="130">
    <source>
    </source>
</evidence>
<evidence type="ECO:0000269" key="131">
    <source>
    </source>
</evidence>
<evidence type="ECO:0000269" key="132">
    <source>
    </source>
</evidence>
<evidence type="ECO:0000269" key="133">
    <source>
    </source>
</evidence>
<evidence type="ECO:0000269" key="134">
    <source>
    </source>
</evidence>
<evidence type="ECO:0000269" key="135">
    <source>
    </source>
</evidence>
<evidence type="ECO:0000269" key="136">
    <source>
    </source>
</evidence>
<evidence type="ECO:0000269" key="137">
    <source>
    </source>
</evidence>
<evidence type="ECO:0000269" key="138">
    <source>
    </source>
</evidence>
<evidence type="ECO:0000269" key="139">
    <source>
    </source>
</evidence>
<evidence type="ECO:0000269" key="140">
    <source>
    </source>
</evidence>
<evidence type="ECO:0000269" key="141">
    <source>
    </source>
</evidence>
<evidence type="ECO:0000269" key="142">
    <source>
    </source>
</evidence>
<evidence type="ECO:0000269" key="143">
    <source>
    </source>
</evidence>
<evidence type="ECO:0000269" key="144">
    <source>
    </source>
</evidence>
<evidence type="ECO:0000269" key="145">
    <source>
    </source>
</evidence>
<evidence type="ECO:0000269" key="146">
    <source>
    </source>
</evidence>
<evidence type="ECO:0000269" key="147">
    <source>
    </source>
</evidence>
<evidence type="ECO:0000269" key="148">
    <source>
    </source>
</evidence>
<evidence type="ECO:0000269" key="149">
    <source>
    </source>
</evidence>
<evidence type="ECO:0000269" key="150">
    <source>
    </source>
</evidence>
<evidence type="ECO:0000269" key="151">
    <source>
    </source>
</evidence>
<evidence type="ECO:0000269" key="152">
    <source>
    </source>
</evidence>
<evidence type="ECO:0000269" key="153">
    <source>
    </source>
</evidence>
<evidence type="ECO:0000269" key="154">
    <source>
    </source>
</evidence>
<evidence type="ECO:0000269" key="155">
    <source>
    </source>
</evidence>
<evidence type="ECO:0000269" key="156">
    <source>
    </source>
</evidence>
<evidence type="ECO:0000269" key="157">
    <source>
    </source>
</evidence>
<evidence type="ECO:0000269" key="158">
    <source>
    </source>
</evidence>
<evidence type="ECO:0000269" key="159">
    <source>
    </source>
</evidence>
<evidence type="ECO:0000269" key="160">
    <source>
    </source>
</evidence>
<evidence type="ECO:0000269" key="161">
    <source>
    </source>
</evidence>
<evidence type="ECO:0000269" key="162">
    <source>
    </source>
</evidence>
<evidence type="ECO:0000269" key="163">
    <source>
    </source>
</evidence>
<evidence type="ECO:0000269" key="164">
    <source>
    </source>
</evidence>
<evidence type="ECO:0000269" key="165">
    <source>
    </source>
</evidence>
<evidence type="ECO:0000269" key="166">
    <source>
    </source>
</evidence>
<evidence type="ECO:0000269" key="167">
    <source>
    </source>
</evidence>
<evidence type="ECO:0000269" key="168">
    <source>
    </source>
</evidence>
<evidence type="ECO:0000269" key="169">
    <source>
    </source>
</evidence>
<evidence type="ECO:0000269" key="170">
    <source>
    </source>
</evidence>
<evidence type="ECO:0000269" key="171">
    <source>
    </source>
</evidence>
<evidence type="ECO:0000269" key="172">
    <source>
    </source>
</evidence>
<evidence type="ECO:0000269" key="173">
    <source>
    </source>
</evidence>
<evidence type="ECO:0000269" key="174">
    <source>
    </source>
</evidence>
<evidence type="ECO:0000269" key="175">
    <source>
    </source>
</evidence>
<evidence type="ECO:0000269" key="176">
    <source>
    </source>
</evidence>
<evidence type="ECO:0000269" key="177">
    <source>
    </source>
</evidence>
<evidence type="ECO:0000269" key="178">
    <source>
    </source>
</evidence>
<evidence type="ECO:0000269" key="179">
    <source>
    </source>
</evidence>
<evidence type="ECO:0000269" key="180">
    <source>
    </source>
</evidence>
<evidence type="ECO:0000269" key="181">
    <source>
    </source>
</evidence>
<evidence type="ECO:0000269" key="182">
    <source>
    </source>
</evidence>
<evidence type="ECO:0000269" key="183">
    <source>
    </source>
</evidence>
<evidence type="ECO:0000269" key="184">
    <source>
    </source>
</evidence>
<evidence type="ECO:0000269" key="185">
    <source ref="12"/>
</evidence>
<evidence type="ECO:0000269" key="186">
    <source ref="14"/>
</evidence>
<evidence type="ECO:0000269" key="187">
    <source ref="17"/>
</evidence>
<evidence type="ECO:0000269" key="188">
    <source ref="22"/>
</evidence>
<evidence type="ECO:0000269" key="189">
    <source ref="23"/>
</evidence>
<evidence type="ECO:0000269" key="190">
    <source ref="37"/>
</evidence>
<evidence type="ECO:0000303" key="191">
    <source>
    </source>
</evidence>
<evidence type="ECO:0000305" key="192"/>
<evidence type="ECO:0000305" key="193">
    <source>
    </source>
</evidence>
<evidence type="ECO:0007744" key="194">
    <source>
        <dbReference type="PDB" id="6T58"/>
    </source>
</evidence>
<evidence type="ECO:0007744" key="195">
    <source>
    </source>
</evidence>
<evidence type="ECO:0007829" key="196">
    <source>
        <dbReference type="PDB" id="1AIE"/>
    </source>
</evidence>
<evidence type="ECO:0007829" key="197">
    <source>
        <dbReference type="PDB" id="1YC5"/>
    </source>
</evidence>
<evidence type="ECO:0007829" key="198">
    <source>
        <dbReference type="PDB" id="2ADY"/>
    </source>
</evidence>
<evidence type="ECO:0007829" key="199">
    <source>
        <dbReference type="PDB" id="2B3G"/>
    </source>
</evidence>
<evidence type="ECO:0007829" key="200">
    <source>
        <dbReference type="PDB" id="2FEJ"/>
    </source>
</evidence>
<evidence type="ECO:0007829" key="201">
    <source>
        <dbReference type="PDB" id="2L14"/>
    </source>
</evidence>
<evidence type="ECO:0007829" key="202">
    <source>
        <dbReference type="PDB" id="3D06"/>
    </source>
</evidence>
<evidence type="ECO:0007829" key="203">
    <source>
        <dbReference type="PDB" id="3D07"/>
    </source>
</evidence>
<evidence type="ECO:0007829" key="204">
    <source>
        <dbReference type="PDB" id="3Q01"/>
    </source>
</evidence>
<evidence type="ECO:0007829" key="205">
    <source>
        <dbReference type="PDB" id="3Q05"/>
    </source>
</evidence>
<evidence type="ECO:0007829" key="206">
    <source>
        <dbReference type="PDB" id="4HJE"/>
    </source>
</evidence>
<evidence type="ECO:0007829" key="207">
    <source>
        <dbReference type="PDB" id="4KVP"/>
    </source>
</evidence>
<evidence type="ECO:0007829" key="208">
    <source>
        <dbReference type="PDB" id="5HOU"/>
    </source>
</evidence>
<evidence type="ECO:0007829" key="209">
    <source>
        <dbReference type="PDB" id="5HPD"/>
    </source>
</evidence>
<evidence type="ECO:0007829" key="210">
    <source>
        <dbReference type="PDB" id="5UN8"/>
    </source>
</evidence>
<evidence type="ECO:0007829" key="211">
    <source>
        <dbReference type="PDB" id="6GGC"/>
    </source>
</evidence>
<evidence type="ECO:0007829" key="212">
    <source>
        <dbReference type="PDB" id="7B49"/>
    </source>
</evidence>
<evidence type="ECO:0007829" key="213">
    <source>
        <dbReference type="PDB" id="9C5S"/>
    </source>
</evidence>
<proteinExistence type="evidence at protein level"/>
<gene>
    <name type="primary">TP53</name>
    <name type="synonym">P53</name>
</gene>
<protein>
    <recommendedName>
        <fullName>Cellular tumor antigen p53</fullName>
    </recommendedName>
    <alternativeName>
        <fullName>Antigen NY-CO-13</fullName>
    </alternativeName>
    <alternativeName>
        <fullName>Phosphoprotein p53</fullName>
    </alternativeName>
    <alternativeName>
        <fullName>Tumor suppressor p53</fullName>
    </alternativeName>
</protein>
<keyword id="KW-0002">3D-structure</keyword>
<keyword id="KW-0007">Acetylation</keyword>
<keyword id="KW-0010">Activator</keyword>
<keyword id="KW-0877">Alternative promoter usage</keyword>
<keyword id="KW-0025">Alternative splicing</keyword>
<keyword id="KW-0053">Apoptosis</keyword>
<keyword id="KW-0090">Biological rhythms</keyword>
<keyword id="KW-0131">Cell cycle</keyword>
<keyword id="KW-0963">Cytoplasm</keyword>
<keyword id="KW-0206">Cytoskeleton</keyword>
<keyword id="KW-0903">Direct protein sequencing</keyword>
<keyword id="KW-0225">Disease variant</keyword>
<keyword id="KW-0238">DNA-binding</keyword>
<keyword id="KW-0256">Endoplasmic reticulum</keyword>
<keyword id="KW-0325">Glycoprotein</keyword>
<keyword id="KW-0945">Host-virus interaction</keyword>
<keyword id="KW-1017">Isopeptide bond</keyword>
<keyword id="KW-0435">Li-Fraumeni syndrome</keyword>
<keyword id="KW-0479">Metal-binding</keyword>
<keyword id="KW-0488">Methylation</keyword>
<keyword id="KW-0496">Mitochondrion</keyword>
<keyword id="KW-1210">Necrosis</keyword>
<keyword id="KW-0539">Nucleus</keyword>
<keyword id="KW-0597">Phosphoprotein</keyword>
<keyword id="KW-1267">Proteomics identification</keyword>
<keyword id="KW-1185">Reference proteome</keyword>
<keyword id="KW-0678">Repressor</keyword>
<keyword id="KW-0804">Transcription</keyword>
<keyword id="KW-0805">Transcription regulation</keyword>
<keyword id="KW-0043">Tumor suppressor</keyword>
<keyword id="KW-0832">Ubl conjugation</keyword>
<keyword id="KW-0862">Zinc</keyword>
<reference key="1">
    <citation type="journal article" date="1985" name="EMBO J.">
        <title>Human p53 cellular tumor antigen: cDNA sequence and expression in COS cells.</title>
        <authorList>
            <person name="Zakut-Houri R."/>
            <person name="Bienz-Tadmor B."/>
            <person name="Givol D."/>
            <person name="Oren M."/>
        </authorList>
    </citation>
    <scope>NUCLEOTIDE SEQUENCE [MRNA] (ISOFORM 1)</scope>
</reference>
<reference key="2">
    <citation type="journal article" date="1986" name="Mol. Cell. Biol.">
        <title>Characterization of the human p53 gene.</title>
        <authorList>
            <person name="Lamb P."/>
            <person name="Crawford L."/>
        </authorList>
    </citation>
    <scope>NUCLEOTIDE SEQUENCE [GENOMIC DNA / MRNA] (ISOFORM 1)</scope>
    <scope>VARIANT GLY-76</scope>
</reference>
<reference key="3">
    <citation type="journal article" date="1985" name="Mol. Cell. Biol.">
        <title>Molecular cloning and in vitro expression of a cDNA clone for human cellular tumor antigen p53.</title>
        <authorList>
            <person name="Harlow E."/>
            <person name="Williamson N.M."/>
            <person name="Ralston R."/>
            <person name="Helfman D.M."/>
            <person name="Adams T.E."/>
        </authorList>
    </citation>
    <scope>NUCLEOTIDE SEQUENCE [MRNA] (ISOFORM 1)</scope>
</reference>
<reference key="4">
    <citation type="journal article" date="1986" name="Mol. Cell. Biol.">
        <title>Molecular basis for heterogeneity of the human p53 protein.</title>
        <authorList>
            <person name="Harris N."/>
            <person name="Brill E."/>
            <person name="Shohat O."/>
            <person name="Prokocimer M."/>
            <person name="Wolf D."/>
            <person name="Arai N."/>
            <person name="Rotter V."/>
        </authorList>
    </citation>
    <scope>NUCLEOTIDE SEQUENCE [MRNA] (ISOFORM 1)</scope>
</reference>
<reference key="5">
    <citation type="journal article" date="1988" name="Gene">
        <title>A variation in the structure of the protein-coding region of the human p53 gene.</title>
        <authorList>
            <person name="Buchman V.L."/>
            <person name="Chumakov P.M."/>
            <person name="Ninkina N.N."/>
            <person name="Samarina O.P."/>
            <person name="Georgiev G.P."/>
        </authorList>
    </citation>
    <scope>NUCLEOTIDE SEQUENCE [GENOMIC DNA]</scope>
</reference>
<reference key="6">
    <citation type="journal article" date="1991" name="EMBO J.">
        <title>p53 is frequently mutated in Burkitt's lymphoma cell lines.</title>
        <authorList>
            <person name="Farrell P.J."/>
            <person name="Allan G."/>
            <person name="Shanahan F."/>
            <person name="Vousden K.H."/>
            <person name="Crook T."/>
        </authorList>
    </citation>
    <scope>NUCLEOTIDE SEQUENCE [MRNA] (ISOFORM 1)</scope>
    <scope>VARIANTS SPORADIC CANCERS</scope>
</reference>
<reference key="7">
    <citation type="journal article" date="1993" name="Radiat. Res.">
        <title>Isolation of two cell lines from a human malignant glioma specimen differing in sensitivity to radiation and chemotherapeutic drugs.</title>
        <authorList>
            <person name="Allalunis-Turner M.J."/>
            <person name="Barron G.M."/>
            <person name="Day R.S. III"/>
            <person name="Dobler K.D."/>
            <person name="Mirzayans R."/>
        </authorList>
    </citation>
    <scope>NUCLEOTIDE SEQUENCE [GENOMIC DNA]</scope>
    <scope>VARIANT LYS-286</scope>
</reference>
<reference key="8">
    <citation type="journal article" date="2001" name="J. Biol. Chem.">
        <title>Hyaluronidase induction of a WW domain-containing oxidoreductase that enhances tumor necrosis factor cytotoxicity.</title>
        <authorList>
            <person name="Chang N.-S."/>
            <person name="Pratt N."/>
            <person name="Heath J."/>
            <person name="Schultz L."/>
            <person name="Sleve D."/>
            <person name="Carey G.B."/>
            <person name="Zevotek N."/>
        </authorList>
    </citation>
    <scope>NUCLEOTIDE SEQUENCE [MRNA] (ISOFORM 1)</scope>
    <scope>INTERACTION WITH WWOX</scope>
</reference>
<reference key="9">
    <citation type="journal article" date="2005" name="Genes Dev.">
        <title>p53 isoforms can regulate p53 transcriptional activity.</title>
        <authorList>
            <person name="Bourdon J.C."/>
            <person name="Fernandes K."/>
            <person name="Murray-Zmijewski F."/>
            <person name="Liu G."/>
            <person name="Diot A."/>
            <person name="Xirodimas D.P."/>
            <person name="Saville M.K."/>
            <person name="Lane D.P."/>
        </authorList>
    </citation>
    <scope>NUCLEOTIDE SEQUENCE [MRNA] (ISOFORMS 1; 2; 3; 7; 8 AND 9)</scope>
    <scope>SUBCELLULAR LOCATION</scope>
    <scope>TISSUE SPECIFICITY</scope>
    <scope>ALTERNATIVE PROMOTER USAGE</scope>
    <scope>ALTERNATIVE SPLICING</scope>
    <scope>INDUCTION</scope>
    <scope>VARIANT ARG-72</scope>
    <source>
        <tissue>Colon</tissue>
    </source>
</reference>
<reference key="10">
    <citation type="submission" date="1991-06" db="EMBL/GenBank/DDBJ databases">
        <authorList>
            <person name="Chumakov P.M."/>
            <person name="Almazov V.P."/>
            <person name="Jenkins J.R."/>
        </authorList>
    </citation>
    <scope>NUCLEOTIDE SEQUENCE [GENOMIC DNA]</scope>
</reference>
<reference key="11">
    <citation type="submission" date="1997-03" db="EMBL/GenBank/DDBJ databases">
        <title>P53 genomic sequence. Corrections and polymorphism.</title>
        <authorList>
            <person name="Rozemuller E.H."/>
            <person name="Tilanus M.G.J."/>
        </authorList>
    </citation>
    <scope>NUCLEOTIDE SEQUENCE [GENOMIC DNA]</scope>
</reference>
<reference key="12">
    <citation type="submission" date="2004-11" db="EMBL/GenBank/DDBJ databases">
        <authorList>
            <consortium name="NIEHS SNPs program"/>
        </authorList>
    </citation>
    <scope>NUCLEOTIDE SEQUENCE [GENOMIC DNA]</scope>
    <scope>VARIANTS SER-47; LYS-339 AND ALA-366</scope>
</reference>
<reference key="13">
    <citation type="journal article" date="2000" name="Radiat. Res.">
        <title>Human TP53 from the malignant glioma-derived cell lines M059J and M059K has a cancer-associated mutation in exon 8.</title>
        <authorList>
            <person name="Anderson C.W."/>
            <person name="Allalunis-Turner M.J."/>
        </authorList>
    </citation>
    <scope>NUCLEOTIDE SEQUENCE [GENOMIC DNA]</scope>
    <scope>VARIANT LYS-286</scope>
</reference>
<reference key="14">
    <citation type="submission" date="2002-03" db="EMBL/GenBank/DDBJ databases">
        <title>Identification of a tumor-rejection antigen recognized by HLA-B46 restricted CTL.</title>
        <authorList>
            <person name="Azuma K."/>
            <person name="Shichijo S."/>
            <person name="Itoh K."/>
        </authorList>
    </citation>
    <scope>NUCLEOTIDE SEQUENCE [MRNA] (ISOFORM 1)</scope>
    <scope>VARIANTS HIS-273 AND SER-309</scope>
</reference>
<reference key="15">
    <citation type="journal article" date="2004" name="Nat. Genet.">
        <title>Complete sequencing and characterization of 21,243 full-length human cDNAs.</title>
        <authorList>
            <person name="Ota T."/>
            <person name="Suzuki Y."/>
            <person name="Nishikawa T."/>
            <person name="Otsuki T."/>
            <person name="Sugiyama T."/>
            <person name="Irie R."/>
            <person name="Wakamatsu A."/>
            <person name="Hayashi K."/>
            <person name="Sato H."/>
            <person name="Nagai K."/>
            <person name="Kimura K."/>
            <person name="Makita H."/>
            <person name="Sekine M."/>
            <person name="Obayashi M."/>
            <person name="Nishi T."/>
            <person name="Shibahara T."/>
            <person name="Tanaka T."/>
            <person name="Ishii S."/>
            <person name="Yamamoto J."/>
            <person name="Saito K."/>
            <person name="Kawai Y."/>
            <person name="Isono Y."/>
            <person name="Nakamura Y."/>
            <person name="Nagahari K."/>
            <person name="Murakami K."/>
            <person name="Yasuda T."/>
            <person name="Iwayanagi T."/>
            <person name="Wagatsuma M."/>
            <person name="Shiratori A."/>
            <person name="Sudo H."/>
            <person name="Hosoiri T."/>
            <person name="Kaku Y."/>
            <person name="Kodaira H."/>
            <person name="Kondo H."/>
            <person name="Sugawara M."/>
            <person name="Takahashi M."/>
            <person name="Kanda K."/>
            <person name="Yokoi T."/>
            <person name="Furuya T."/>
            <person name="Kikkawa E."/>
            <person name="Omura Y."/>
            <person name="Abe K."/>
            <person name="Kamihara K."/>
            <person name="Katsuta N."/>
            <person name="Sato K."/>
            <person name="Tanikawa M."/>
            <person name="Yamazaki M."/>
            <person name="Ninomiya K."/>
            <person name="Ishibashi T."/>
            <person name="Yamashita H."/>
            <person name="Murakawa K."/>
            <person name="Fujimori K."/>
            <person name="Tanai H."/>
            <person name="Kimata M."/>
            <person name="Watanabe M."/>
            <person name="Hiraoka S."/>
            <person name="Chiba Y."/>
            <person name="Ishida S."/>
            <person name="Ono Y."/>
            <person name="Takiguchi S."/>
            <person name="Watanabe S."/>
            <person name="Yosida M."/>
            <person name="Hotuta T."/>
            <person name="Kusano J."/>
            <person name="Kanehori K."/>
            <person name="Takahashi-Fujii A."/>
            <person name="Hara H."/>
            <person name="Tanase T.-O."/>
            <person name="Nomura Y."/>
            <person name="Togiya S."/>
            <person name="Komai F."/>
            <person name="Hara R."/>
            <person name="Takeuchi K."/>
            <person name="Arita M."/>
            <person name="Imose N."/>
            <person name="Musashino K."/>
            <person name="Yuuki H."/>
            <person name="Oshima A."/>
            <person name="Sasaki N."/>
            <person name="Aotsuka S."/>
            <person name="Yoshikawa Y."/>
            <person name="Matsunawa H."/>
            <person name="Ichihara T."/>
            <person name="Shiohata N."/>
            <person name="Sano S."/>
            <person name="Moriya S."/>
            <person name="Momiyama H."/>
            <person name="Satoh N."/>
            <person name="Takami S."/>
            <person name="Terashima Y."/>
            <person name="Suzuki O."/>
            <person name="Nakagawa S."/>
            <person name="Senoh A."/>
            <person name="Mizoguchi H."/>
            <person name="Goto Y."/>
            <person name="Shimizu F."/>
            <person name="Wakebe H."/>
            <person name="Hishigaki H."/>
            <person name="Watanabe T."/>
            <person name="Sugiyama A."/>
            <person name="Takemoto M."/>
            <person name="Kawakami B."/>
            <person name="Yamazaki M."/>
            <person name="Watanabe K."/>
            <person name="Kumagai A."/>
            <person name="Itakura S."/>
            <person name="Fukuzumi Y."/>
            <person name="Fujimori Y."/>
            <person name="Komiyama M."/>
            <person name="Tashiro H."/>
            <person name="Tanigami A."/>
            <person name="Fujiwara T."/>
            <person name="Ono T."/>
            <person name="Yamada K."/>
            <person name="Fujii Y."/>
            <person name="Ozaki K."/>
            <person name="Hirao M."/>
            <person name="Ohmori Y."/>
            <person name="Kawabata A."/>
            <person name="Hikiji T."/>
            <person name="Kobatake N."/>
            <person name="Inagaki H."/>
            <person name="Ikema Y."/>
            <person name="Okamoto S."/>
            <person name="Okitani R."/>
            <person name="Kawakami T."/>
            <person name="Noguchi S."/>
            <person name="Itoh T."/>
            <person name="Shigeta K."/>
            <person name="Senba T."/>
            <person name="Matsumura K."/>
            <person name="Nakajima Y."/>
            <person name="Mizuno T."/>
            <person name="Morinaga M."/>
            <person name="Sasaki M."/>
            <person name="Togashi T."/>
            <person name="Oyama M."/>
            <person name="Hata H."/>
            <person name="Watanabe M."/>
            <person name="Komatsu T."/>
            <person name="Mizushima-Sugano J."/>
            <person name="Satoh T."/>
            <person name="Shirai Y."/>
            <person name="Takahashi Y."/>
            <person name="Nakagawa K."/>
            <person name="Okumura K."/>
            <person name="Nagase T."/>
            <person name="Nomura N."/>
            <person name="Kikuchi H."/>
            <person name="Masuho Y."/>
            <person name="Yamashita R."/>
            <person name="Nakai K."/>
            <person name="Yada T."/>
            <person name="Nakamura Y."/>
            <person name="Ohara O."/>
            <person name="Isogai T."/>
            <person name="Sugano S."/>
        </authorList>
    </citation>
    <scope>NUCLEOTIDE SEQUENCE [LARGE SCALE MRNA] (ISOFORM 1)</scope>
    <scope>VARIANT ARG-72</scope>
</reference>
<reference key="16">
    <citation type="journal article" date="2006" name="Nature">
        <title>DNA sequence of human chromosome 17 and analysis of rearrangement in the human lineage.</title>
        <authorList>
            <person name="Zody M.C."/>
            <person name="Garber M."/>
            <person name="Adams D.J."/>
            <person name="Sharpe T."/>
            <person name="Harrow J."/>
            <person name="Lupski J.R."/>
            <person name="Nicholson C."/>
            <person name="Searle S.M."/>
            <person name="Wilming L."/>
            <person name="Young S.K."/>
            <person name="Abouelleil A."/>
            <person name="Allen N.R."/>
            <person name="Bi W."/>
            <person name="Bloom T."/>
            <person name="Borowsky M.L."/>
            <person name="Bugalter B.E."/>
            <person name="Butler J."/>
            <person name="Chang J.L."/>
            <person name="Chen C.-K."/>
            <person name="Cook A."/>
            <person name="Corum B."/>
            <person name="Cuomo C.A."/>
            <person name="de Jong P.J."/>
            <person name="DeCaprio D."/>
            <person name="Dewar K."/>
            <person name="FitzGerald M."/>
            <person name="Gilbert J."/>
            <person name="Gibson R."/>
            <person name="Gnerre S."/>
            <person name="Goldstein S."/>
            <person name="Grafham D.V."/>
            <person name="Grocock R."/>
            <person name="Hafez N."/>
            <person name="Hagopian D.S."/>
            <person name="Hart E."/>
            <person name="Norman C.H."/>
            <person name="Humphray S."/>
            <person name="Jaffe D.B."/>
            <person name="Jones M."/>
            <person name="Kamal M."/>
            <person name="Khodiyar V.K."/>
            <person name="LaButti K."/>
            <person name="Laird G."/>
            <person name="Lehoczky J."/>
            <person name="Liu X."/>
            <person name="Lokyitsang T."/>
            <person name="Loveland J."/>
            <person name="Lui A."/>
            <person name="Macdonald P."/>
            <person name="Major J.E."/>
            <person name="Matthews L."/>
            <person name="Mauceli E."/>
            <person name="McCarroll S.A."/>
            <person name="Mihalev A.H."/>
            <person name="Mudge J."/>
            <person name="Nguyen C."/>
            <person name="Nicol R."/>
            <person name="O'Leary S.B."/>
            <person name="Osoegawa K."/>
            <person name="Schwartz D.C."/>
            <person name="Shaw-Smith C."/>
            <person name="Stankiewicz P."/>
            <person name="Steward C."/>
            <person name="Swarbreck D."/>
            <person name="Venkataraman V."/>
            <person name="Whittaker C.A."/>
            <person name="Yang X."/>
            <person name="Zimmer A.R."/>
            <person name="Bradley A."/>
            <person name="Hubbard T."/>
            <person name="Birren B.W."/>
            <person name="Rogers J."/>
            <person name="Lander E.S."/>
            <person name="Nusbaum C."/>
        </authorList>
    </citation>
    <scope>NUCLEOTIDE SEQUENCE [LARGE SCALE GENOMIC DNA]</scope>
</reference>
<reference key="17">
    <citation type="submission" date="2005-09" db="EMBL/GenBank/DDBJ databases">
        <authorList>
            <person name="Mural R.J."/>
            <person name="Istrail S."/>
            <person name="Sutton G.G."/>
            <person name="Florea L."/>
            <person name="Halpern A.L."/>
            <person name="Mobarry C.M."/>
            <person name="Lippert R."/>
            <person name="Walenz B."/>
            <person name="Shatkay H."/>
            <person name="Dew I."/>
            <person name="Miller J.R."/>
            <person name="Flanigan M.J."/>
            <person name="Edwards N.J."/>
            <person name="Bolanos R."/>
            <person name="Fasulo D."/>
            <person name="Halldorsson B.V."/>
            <person name="Hannenhalli S."/>
            <person name="Turner R."/>
            <person name="Yooseph S."/>
            <person name="Lu F."/>
            <person name="Nusskern D.R."/>
            <person name="Shue B.C."/>
            <person name="Zheng X.H."/>
            <person name="Zhong F."/>
            <person name="Delcher A.L."/>
            <person name="Huson D.H."/>
            <person name="Kravitz S.A."/>
            <person name="Mouchard L."/>
            <person name="Reinert K."/>
            <person name="Remington K.A."/>
            <person name="Clark A.G."/>
            <person name="Waterman M.S."/>
            <person name="Eichler E.E."/>
            <person name="Adams M.D."/>
            <person name="Hunkapiller M.W."/>
            <person name="Myers E.W."/>
            <person name="Venter J.C."/>
        </authorList>
    </citation>
    <scope>NUCLEOTIDE SEQUENCE [LARGE SCALE GENOMIC DNA]</scope>
    <scope>VARIANT ARG-72</scope>
</reference>
<reference key="18">
    <citation type="journal article" date="2004" name="Genome Res.">
        <title>The status, quality, and expansion of the NIH full-length cDNA project: the Mammalian Gene Collection (MGC).</title>
        <authorList>
            <consortium name="The MGC Project Team"/>
        </authorList>
    </citation>
    <scope>NUCLEOTIDE SEQUENCE [LARGE SCALE MRNA] (ISOFORM 1)</scope>
    <scope>VARIANT ALA-278</scope>
    <source>
        <tissue>Kidney</tissue>
    </source>
</reference>
<reference key="19">
    <citation type="journal article" date="2003" name="Proc. Natl. Acad. Sci. U.S.A.">
        <title>Inhibition of mutant p53 expression and growth of DMS-153 small cell lung carcinoma by antagonists of growth hormone-releasing hormone and bombesin.</title>
        <authorList>
            <person name="Kanashiro C.A."/>
            <person name="Schally A.V."/>
            <person name="Groot K."/>
            <person name="Armatis P."/>
            <person name="Bernardino A.L."/>
            <person name="Varga J.L."/>
        </authorList>
    </citation>
    <scope>NUCLEOTIDE SEQUENCE [MRNA] OF 1-379 (ISOFORM 1)</scope>
    <scope>VARIANTS ASN-139 AND PRO-155</scope>
    <source>
        <tissue>Lung carcinoma</tissue>
    </source>
</reference>
<reference key="20">
    <citation type="journal article" date="1984" name="EMBO J.">
        <title>Isolation and characterization of a human p53 cDNA clone: expression of the human p53 gene.</title>
        <authorList>
            <person name="Matlashewski G."/>
            <person name="Lamb P."/>
            <person name="Pim D."/>
            <person name="Peacock J."/>
            <person name="Crawford L."/>
            <person name="Benchimol S."/>
        </authorList>
    </citation>
    <scope>NUCLEOTIDE SEQUENCE [GENOMIC DNA / MRNA] OF 101-393</scope>
</reference>
<reference key="21">
    <citation type="submission" date="2003-09" db="EMBL/GenBank/DDBJ databases">
        <title>Study on the effect of tumor suppressor gene p53 in arsenism patients.</title>
        <authorList>
            <person name="Pan X.L."/>
            <person name="Zhang A.H."/>
        </authorList>
    </citation>
    <scope>NUCLEOTIDE SEQUENCE [GENOMIC DNA] OF 126-185</scope>
</reference>
<reference key="22">
    <citation type="submission" date="2003-08" db="EMBL/GenBank/DDBJ databases">
        <title>Detection of P53 gene mutations and serum p53 antibodies associated with cigarette smoking.</title>
        <authorList>
            <person name="Nimri L.F."/>
            <person name="Owais W."/>
            <person name="Momani E."/>
        </authorList>
    </citation>
    <scope>NUCLEOTIDE SEQUENCE [GENOMIC DNA] OF 261-298</scope>
    <scope>VARIANT GLN-282</scope>
    <source>
        <tissue>Blood</tissue>
    </source>
</reference>
<reference key="23">
    <citation type="submission" date="1996-07" db="EMBL/GenBank/DDBJ databases">
        <authorList>
            <person name="Filippini G."/>
            <person name="Soldati G."/>
        </authorList>
    </citation>
    <scope>NUCLEOTIDE SEQUENCE [GENOMIC DNA] OF 262-306</scope>
    <scope>VARIANT VAL-262</scope>
    <source>
        <tissue>Ovarian adenocarcinoma</tissue>
    </source>
</reference>
<reference key="24">
    <citation type="submission" date="1999-12" db="EMBL/GenBank/DDBJ databases">
        <title>Mutation detection utilizing a novel PCR approach for amplification of the p53 gene from microdissected tissue: application to archival tumor samples.</title>
        <authorList>
            <person name="Thompson-Hehir J."/>
            <person name="Davies M.P.A."/>
            <person name="Green J.A."/>
            <person name="Halliwell N."/>
            <person name="Joyce K.A."/>
            <person name="Salisbury J."/>
            <person name="Sibson D.R."/>
            <person name="Vergote I."/>
            <person name="Walker C."/>
        </authorList>
    </citation>
    <scope>NUCLEOTIDE SEQUENCE [GENOMIC DNA] OF 225-260</scope>
    <source>
        <tissue>Glial cell</tissue>
        <tissue>Glial tumor</tissue>
    </source>
</reference>
<reference key="25">
    <citation type="submission" date="2000-03" db="EMBL/GenBank/DDBJ databases">
        <title>Bcl6 and P53 gene mutations in tonsillar B cells.</title>
        <authorList>
            <person name="Yavuz A.S."/>
            <person name="Farner N.L."/>
            <person name="Yavuz S."/>
            <person name="Grammer A.C."/>
            <person name="Girschick H.J."/>
            <person name="Lipsky P.E."/>
        </authorList>
    </citation>
    <scope>NUCLEOTIDE SEQUENCE [GENOMIC DNA] OF 225-260</scope>
</reference>
<reference key="26">
    <citation type="journal article" date="2008" name="Nat. Cell Biol.">
        <title>Arginine methylation regulates the p53 response.</title>
        <authorList>
            <person name="Jansson M."/>
            <person name="Durant S.T."/>
            <person name="Cho E.C."/>
            <person name="Sheahan S."/>
            <person name="Edelmann M."/>
            <person name="Kessler B."/>
            <person name="La Thangue N.B."/>
        </authorList>
    </citation>
    <scope>PROTEIN SEQUENCE OF 320-337</scope>
    <scope>SUBUNIT</scope>
    <scope>INTERACTION WITH PRMT5</scope>
    <scope>SUBCELLULAR LOCATION</scope>
    <scope>METHYLATION AT ARG-333; ARG-335 AND ARG-337 BY PRMT5</scope>
    <scope>IDENTIFICATION BY MASS SPECTROMETRY</scope>
    <scope>MUTAGENESIS OF 333-ARG--ARG-337</scope>
</reference>
<reference key="27">
    <citation type="submission" date="2003-04" db="EMBL/GenBank/DDBJ databases">
        <title>Allelic variant in intron 9 of TP53 gene.</title>
        <authorList>
            <person name="Pinto E.M."/>
            <person name="Mendonca B.B."/>
            <person name="Latronico A.C."/>
        </authorList>
    </citation>
    <scope>NUCLEOTIDE SEQUENCE [GENOMIC DNA] OF 332-366</scope>
</reference>
<reference key="28">
    <citation type="journal article" date="1990" name="Cell">
        <title>The E6 oncoprotein encoded by human papillomavirus types 16 and 18 promotes the degradation of p53.</title>
        <authorList>
            <person name="Scheffner M."/>
            <person name="Werness B.A."/>
            <person name="Huibregtse J.M."/>
            <person name="Levine A.J."/>
            <person name="Howley P.M."/>
        </authorList>
    </citation>
    <scope>INTERACTION WITH HUMAN PAPILLOMAVIRUS TYPE 6 AND 11 PROTEIN E6 (MICROBIAL INFECTION)</scope>
</reference>
<reference key="29">
    <citation type="journal article" date="1990" name="Oncogene">
        <title>The p53 nuclear localisation signal is structurally linked to a p34cdc2 kinase motif.</title>
        <authorList>
            <person name="Addison C."/>
            <person name="Jenkins J.R."/>
            <person name="Sturzbecher H.-W."/>
        </authorList>
    </citation>
    <scope>NUCLEAR LOCALIZATION SIGNAL</scope>
    <scope>MUTAGENESIS OF LYS-319; LYS-320 AND LYS-321</scope>
</reference>
<reference key="30">
    <citation type="journal article" date="1990" name="Proc. Natl. Acad. Sci. U.S.A.">
        <title>Human p53 is phosphorylated by p60-cdc2 and cyclin B-cdc2.</title>
        <authorList>
            <person name="Bischoff J.R."/>
            <person name="Friedman P.N."/>
            <person name="Marshak D.R."/>
            <person name="Prives C."/>
            <person name="Beach D."/>
        </authorList>
    </citation>
    <scope>PHOSPHORYLATION BY P60/CDC2 AND CYCLIN B/CDC2</scope>
</reference>
<reference key="31">
    <citation type="journal article" date="1991" name="Mol. Cell. Biol.">
        <title>The tumor suppressor p53 is bound to RNA by a stable covalent linkage.</title>
        <authorList>
            <person name="Samad A."/>
            <person name="Carroll R.B."/>
        </authorList>
    </citation>
    <scope>PHOSPHORYLATION</scope>
</reference>
<reference key="32">
    <citation type="journal article" date="1991" name="Mol. Cell. Biol.">
        <title>Dephosphorylation of simian virus 40 large-T antigen and p53 protein by protein phosphatase 2A: inhibition by small-t antigen.</title>
        <authorList>
            <person name="Scheidtmann K.H."/>
            <person name="Mumby M.C."/>
            <person name="Rundell K."/>
            <person name="Walter G."/>
        </authorList>
    </citation>
    <scope>DEPHOSPHORYLATION BY PP2A</scope>
</reference>
<reference key="33">
    <citation type="journal article" date="1996" name="Oncogene">
        <title>The human tumour suppressor gene p53 is alternatively spliced in normal cells.</title>
        <authorList>
            <person name="Flaman J.-M."/>
            <person name="Waridel F."/>
            <person name="Estreicher A."/>
            <person name="Vannier A."/>
            <person name="Limacher J.-M."/>
            <person name="Gilbert D."/>
            <person name="Iggo R."/>
            <person name="Frebourg T."/>
        </authorList>
    </citation>
    <scope>ALTERNATIVE SPLICING</scope>
</reference>
<reference key="34">
    <citation type="journal article" date="1996" name="Oncogene">
        <title>Regulation of specific DNA binding by p53: evidence for a role for O-glycosylation and charged residues at the carboxy-terminus.</title>
        <authorList>
            <person name="Shaw P."/>
            <person name="Freeman J."/>
            <person name="Bovey R."/>
            <person name="Iggo R."/>
        </authorList>
    </citation>
    <scope>GLYCOSYLATION</scope>
</reference>
<reference key="35">
    <citation type="journal article" date="1997" name="Mol. Cell. Biol.">
        <title>p53 is phosphorylated by CDK7-cyclin H in a p36MAT1-dependent manner.</title>
        <authorList>
            <person name="Ko L.J."/>
            <person name="Shieh S.-Y."/>
            <person name="Chen X."/>
            <person name="Jayaraman L."/>
            <person name="Tamai K."/>
            <person name="Taya Y."/>
            <person name="Prives C."/>
            <person name="Pan Z.-Q."/>
        </authorList>
    </citation>
    <scope>PHOSPHORYLATION AT SER-33</scope>
</reference>
<reference key="36">
    <citation type="journal article" date="1998" name="Oncogene">
        <title>Regulation of CAK kinase activity by p53.</title>
        <authorList>
            <person name="Schneider E."/>
            <person name="Montenarh M."/>
            <person name="Wagner P."/>
        </authorList>
    </citation>
    <scope>FUNCTION</scope>
    <scope>IDENTIFICATION IN COMPLEX WITH CAK</scope>
</reference>
<reference key="37">
    <citation type="journal article" date="1999" name="EMBO J.">
        <title>Activation of p53 by conjugation to the ubiquitin-like protein SUMO-1.</title>
        <authorList>
            <person name="Gostissa M."/>
            <person name="Hengstermann A."/>
            <person name="Fogal V."/>
            <person name="Sandy P."/>
            <person name="Schwarz S.E."/>
            <person name="Scheffner M."/>
            <person name="Del Sal G."/>
        </authorList>
    </citation>
    <scope>SUMOYLATION AT LYS-386</scope>
    <scope>MUTAGENESIS OF LYS-386</scope>
</reference>
<reference key="38">
    <citation type="journal article" date="1999" name="FEBS Lett.">
        <title>Protein kinase CK1 is a p53-threonine 18 kinase which requires prior phosphorylation of serine 15.</title>
        <authorList>
            <person name="Dumaz N."/>
            <person name="Milne D.M."/>
            <person name="Meek D.W."/>
        </authorList>
    </citation>
    <scope>PHOSPHORYLATION AT THR-18 BY CSNK1D/CK1</scope>
</reference>
<reference key="39">
    <citation type="journal article" date="1999" name="J. Biol. Chem.">
        <title>A bipartite nuclear localization signal is required for p53 nuclear import regulated by a carboxyl-terminal domain.</title>
        <authorList>
            <person name="Liang S.H."/>
            <person name="Clarke M.F."/>
        </authorList>
    </citation>
    <scope>BIPARTITE NUCLEAR LOCALIZATION SIGNAL</scope>
    <scope>CHARACTERIZATION OF VARIANT ASN-305</scope>
</reference>
<reference key="40">
    <citation type="journal article" date="1999" name="Proc. Natl. Acad. Sci. U.S.A.">
        <title>Phosphorylation of Ser-20 mediates stabilization of human p53 in response to DNA damage.</title>
        <authorList>
            <person name="Chehab N.H."/>
            <person name="Malikzay A."/>
            <person name="Stavridi E.S."/>
            <person name="Halazonetis T.D."/>
        </authorList>
    </citation>
    <scope>PHOSPHORYLATION AT SER-15 AND SER-20</scope>
    <scope>INDUCTION BY DNA DAMAGE</scope>
    <scope>CHARACTERIZATION OF LFS VARIANT HIS-273</scope>
    <scope>MUTAGENESIS OF THR-18; SER-20 AND 22-LEU-TRP-23</scope>
    <scope>SUBCELLULAR LOCATION</scope>
    <scope>INTERACTION WITH PML AND MDM2</scope>
</reference>
<reference key="41">
    <citation type="journal article" date="2000" name="J. Biol. Chem.">
        <title>Mdm2 is a RING finger-dependent ubiquitin protein ligase for itself and p53.</title>
        <authorList>
            <person name="Fang S."/>
            <person name="Jensen J.P."/>
            <person name="Ludwig R.L."/>
            <person name="Vousden K.H."/>
            <person name="Weissman A.M."/>
        </authorList>
    </citation>
    <scope>UBIQUITINATION</scope>
</reference>
<reference key="42">
    <citation type="journal article" date="2000" name="J. Mol. Biol.">
        <title>Post-translational modification of p53 protein in response to ionizing radiation analyzed by mass spectrometry.</title>
        <authorList>
            <person name="Abraham J."/>
            <person name="Kelly J."/>
            <person name="Thibault P."/>
            <person name="Benchimol S."/>
        </authorList>
    </citation>
    <scope>ACETYLATION AT LYS-373 AND LYS-382</scope>
</reference>
<reference key="43">
    <citation type="journal article" date="2000" name="J. Mol. Biol.">
        <title>The C-terminal regulatory domain of p53 contains a functional docking site for cyclin A.</title>
        <authorList>
            <person name="Luciani M.G."/>
            <person name="Hutchins J.R.A."/>
            <person name="Zheleva D."/>
            <person name="Hupp T.R."/>
        </authorList>
    </citation>
    <scope>PHOSPHORYLATION AT SER-315 AND SER-392 BY CDK2</scope>
    <scope>MUTAGENESIS OF LYS-382; LEU-383 AND PHE-385</scope>
</reference>
<reference key="44">
    <citation type="journal article" date="2000" name="Nat. Cell Biol.">
        <title>The function of PML in p53-dependent apoptosis.</title>
        <authorList>
            <person name="Guo A."/>
            <person name="Salomoni P."/>
            <person name="Luo J."/>
            <person name="Shih A."/>
            <person name="Zhong S."/>
            <person name="Gu W."/>
            <person name="Pandolfi P.P."/>
        </authorList>
    </citation>
    <scope>FUNCTION</scope>
    <scope>INTERACTION WITH PML</scope>
    <scope>SUBCELLULAR LOCATION</scope>
</reference>
<reference key="45">
    <citation type="journal article" date="2000" name="Oncogene">
        <title>p53 is involved in the p120E4F-mediated growth arrest.</title>
        <authorList>
            <person name="Sandy P."/>
            <person name="Gostissa M."/>
            <person name="Fogal V."/>
            <person name="Cecco L.D."/>
            <person name="Szalay K."/>
            <person name="Rooney R.J."/>
            <person name="Schneider C."/>
            <person name="Del Sal G."/>
        </authorList>
    </citation>
    <scope>INTERACTION WITH E4F1</scope>
</reference>
<reference key="46">
    <citation type="journal article" date="2000" name="Oncogene">
        <title>The human vaccinia-related kinase 1 (VRK1) phosphorylates threonine-18 within the mdm-2 binding site of the p53 tumour suppressor protein.</title>
        <authorList>
            <person name="Lopez-Borges S."/>
            <person name="Lazo P.A."/>
        </authorList>
    </citation>
    <scope>PHOSPHORYLATION AT THR-18</scope>
</reference>
<reference key="47">
    <citation type="journal article" date="2001" name="Antioxid. Redox Signal.">
        <title>Zinc binding and redox control of p53 structure and function.</title>
        <authorList>
            <person name="Hainaut P."/>
            <person name="Mann K."/>
        </authorList>
    </citation>
    <scope>REVIEW ON ZINC-BINDING PROPERTIES</scope>
</reference>
<reference key="48">
    <citation type="journal article" date="2001" name="Biochem. Biophys. Res. Commun.">
        <title>Cell cycle regulation via p53 phosphorylation by a 5'-AMP activated protein kinase activator, 5-aminoimidazole-4-carboxamide-1-beta-D-ribofuranoside, in a human hepatocellular carcinoma cell line.</title>
        <authorList>
            <person name="Imamura K."/>
            <person name="Ogura T."/>
            <person name="Kishimoto A."/>
            <person name="Kaminishi M."/>
            <person name="Esumi H."/>
        </authorList>
    </citation>
    <scope>PHOSPHORYLATION AT SER-15</scope>
</reference>
<reference key="49">
    <citation type="journal article" date="2001" name="Cell">
        <title>hSIR2(SIRT1) functions as an NAD-dependent p53 deacetylase.</title>
        <authorList>
            <person name="Vaziri H."/>
            <person name="Dessain S.K."/>
            <person name="Ng Eaton E."/>
            <person name="Imai S."/>
            <person name="Frye R.A."/>
            <person name="Pandita T.K."/>
            <person name="Guarente L."/>
            <person name="Weinberg R.A."/>
        </authorList>
    </citation>
    <scope>DEACETYLATION AT LYS-382 BY SIRT1</scope>
</reference>
<reference key="50">
    <citation type="journal article" date="2001" name="J. Biol. Chem.">
        <title>p53 amino acids 339-346 represent the minimal p53 repression domain.</title>
        <authorList>
            <person name="Hong T.M."/>
            <person name="Chen J.J."/>
            <person name="Peck K."/>
            <person name="Yang P.C."/>
            <person name="Wu C.W."/>
        </authorList>
    </citation>
    <scope>MINIMAL REPRESSION DOMAIN</scope>
</reference>
<reference key="51">
    <citation type="journal article" date="2001" name="J. Biol. Chem.">
        <title>Reactive oxygen species-induced phosphorylation of p53 on serine 20 is mediated in part by polo-like kinase-3.</title>
        <authorList>
            <person name="Xie S."/>
            <person name="Wang Q."/>
            <person name="Wu H."/>
            <person name="Cogswell J."/>
            <person name="Lu L."/>
            <person name="Jhanwar-Uniyal M."/>
            <person name="Dai W."/>
        </authorList>
    </citation>
    <scope>PHOSPHORYLATION AT SER-20 BY PLK3</scope>
</reference>
<reference key="52">
    <citation type="journal article" date="2001" name="J. Biol. Chem.">
        <title>Plk3 functionally links DNA damage to cell cycle arrest and apoptosis at least in part via the p53 pathway.</title>
        <authorList>
            <person name="Xie S."/>
            <person name="Wu H."/>
            <person name="Wang Q."/>
            <person name="Cogswell J.P."/>
            <person name="Husain I."/>
            <person name="Conn C."/>
            <person name="Stambrook P."/>
            <person name="Jhanwar-Uniyal M."/>
            <person name="Dai W."/>
        </authorList>
    </citation>
    <scope>PHOSPHORYLATION AT SER-20 BY PLK3</scope>
</reference>
<reference key="53">
    <citation type="journal article" date="2001" name="J. Biol. Chem.">
        <title>SUMO-1 conjugation in vivo requires both a consensus modification motif and nuclear targeting.</title>
        <authorList>
            <person name="Rodriguez M.S."/>
            <person name="Dargemont C."/>
            <person name="Hay R.T."/>
        </authorList>
    </citation>
    <scope>SUMOYLATION AT LYS-386</scope>
    <scope>SUBCELLULAR LOCATION</scope>
    <scope>MUTAGENESIS OF PHE-385; LYS-386; THR-387 AND GLU-388</scope>
</reference>
<reference key="54">
    <citation type="journal article" date="2001" name="J. Biol. Chem.">
        <title>Cloning and characterization of a p53-related protein kinase expressed in interleukin-2-activated cytotoxic T-cells, epithelial tumor cell lines, and the testes.</title>
        <authorList>
            <person name="Abe Y."/>
            <person name="Matsumoto S."/>
            <person name="Wei S."/>
            <person name="Nezu K."/>
            <person name="Miyoshi A."/>
            <person name="Kito K."/>
            <person name="Ueda N."/>
            <person name="Shigemoto K."/>
            <person name="Hitsumoto Y."/>
            <person name="Nikawa J."/>
            <person name="Enomoto Y."/>
        </authorList>
    </citation>
    <scope>PHOSPHORYLATION BY PRPK</scope>
</reference>
<reference key="55">
    <citation type="journal article" date="2001" name="Mol. Cell">
        <title>A DNA damage-induced p53 serine 392 kinase complex contains CK2, hSpt16, and SSRP1.</title>
        <authorList>
            <person name="Keller D.M."/>
            <person name="Zeng X."/>
            <person name="Wang Y."/>
            <person name="Zhang Q.H."/>
            <person name="Kapoor M."/>
            <person name="Shu H."/>
            <person name="Goodman R."/>
            <person name="Lozano G."/>
            <person name="Zhao Y."/>
            <person name="Lu H."/>
        </authorList>
    </citation>
    <scope>PHOSPHORYLATION AT SER-392</scope>
</reference>
<reference key="56">
    <citation type="journal article" date="2002" name="Cell">
        <title>Crystal structure of a UBP-family deubiquitinating enzyme in isolation and in complex with ubiquitin aldehyde.</title>
        <authorList>
            <person name="Hu M."/>
            <person name="Li P."/>
            <person name="Li M."/>
            <person name="Li W."/>
            <person name="Yao T."/>
            <person name="Wu J.-W."/>
            <person name="Gu W."/>
            <person name="Cohen R.E."/>
            <person name="Shi Y."/>
        </authorList>
    </citation>
    <scope>INTERACTION WITH USP7</scope>
</reference>
<reference key="57">
    <citation type="journal article" date="2002" name="J. Biol. Chem.">
        <title>Differential effect of ik3-1/cables on p53- and p73-induced cell death.</title>
        <authorList>
            <person name="Tsuji K."/>
            <person name="Mizumoto K."/>
            <person name="Yamochi T."/>
            <person name="Nishimoto I."/>
            <person name="Matsuoka M."/>
        </authorList>
    </citation>
    <scope>IDENTIFICATION IN A COMPLEX WITH CABLES1 AND TP73</scope>
</reference>
<reference key="58">
    <citation type="journal article" date="2002" name="J. Biol. Chem.">
        <title>Identification and characterization of HIPK2 interacting with p73 and modulating functions of the p53 family in vivo.</title>
        <authorList>
            <person name="Kim E.-J."/>
            <person name="Park J.-S."/>
            <person name="Um S.-J."/>
        </authorList>
    </citation>
    <scope>INTERACTION WITH HIPK2</scope>
</reference>
<reference key="59">
    <citation type="journal article" date="2002" name="Nat. Cell Biol.">
        <title>Regulation of p53 activity by its interaction with homeodomain-interacting protein kinase-2.</title>
        <authorList>
            <person name="Hofmann T.G."/>
            <person name="Moeller A."/>
            <person name="Sirma H."/>
            <person name="Zentgraf H."/>
            <person name="Taya Y."/>
            <person name="Droege W."/>
            <person name="Will H."/>
            <person name="Schmitz M.L."/>
        </authorList>
    </citation>
    <scope>INTERACTION WITH HIPK2</scope>
    <scope>PHOSPHORYLATION AT SER-46</scope>
    <scope>MUTAGENESIS OF SER-46 AND LYS-382</scope>
</reference>
<reference key="60">
    <citation type="journal article" date="2002" name="Nat. Cell Biol.">
        <title>Homeodomain-interacting protein kinase-2 phosphorylates p53 at Ser 46 and mediates apoptosis.</title>
        <authorList>
            <person name="D'Orazi G."/>
            <person name="Cecchinelli B."/>
            <person name="Bruno T."/>
            <person name="Manni I."/>
            <person name="Higashimoto Y."/>
            <person name="Saito S."/>
            <person name="Gostissa M."/>
            <person name="Coen S."/>
            <person name="Marchetti A."/>
            <person name="Del Sal G."/>
            <person name="Piaggio G."/>
            <person name="Fanciulli M."/>
            <person name="Appella E."/>
            <person name="Soddu S."/>
        </authorList>
    </citation>
    <scope>INTERACTION WITH HIPK2</scope>
    <scope>PHOSPHORYLATION AT SER-46</scope>
</reference>
<reference key="61">
    <citation type="journal article" date="2003" name="Cancer Res.">
        <title>p29ING4 and p28ING5 bind to p53 and p300, and enhance p53 activity.</title>
        <authorList>
            <person name="Shiseki M."/>
            <person name="Nagashima M."/>
            <person name="Pedeux R.M."/>
            <person name="Kitahama-Shiseki M."/>
            <person name="Miura K."/>
            <person name="Okamura S."/>
            <person name="Onogi H."/>
            <person name="Higashimoto Y."/>
            <person name="Appella E."/>
            <person name="Yokota J."/>
            <person name="Harris C.C."/>
        </authorList>
    </citation>
    <scope>INTERACTION WITH ING4</scope>
</reference>
<reference key="62">
    <citation type="journal article" date="2003" name="J. Biol. Chem.">
        <title>Identification and characterization of a novel p300-mediated p53 acetylation site, lysine 305.</title>
        <authorList>
            <person name="Wang Y.H."/>
            <person name="Tsay Y.G."/>
            <person name="Tan B.C."/>
            <person name="Lo W.Y."/>
            <person name="Lee S.C."/>
        </authorList>
    </citation>
    <scope>ACETYLATION AT LYS-305</scope>
</reference>
<reference key="63">
    <citation type="journal article" date="2003" name="J. Biol. Chem.">
        <title>The promyelocytic leukemia protein protects p53 from Mdm2-mediated inhibition and degradation.</title>
        <authorList>
            <person name="Louria-Hayon I."/>
            <person name="Grossman T."/>
            <person name="Sionov R.V."/>
            <person name="Alsheich O."/>
            <person name="Pandolfi P.P."/>
            <person name="Haupt Y."/>
        </authorList>
    </citation>
    <scope>FUNCTION</scope>
    <scope>SUBCELLULAR LOCATION</scope>
    <scope>INTERACTION WITH CHEK2 AND PML</scope>
    <scope>UBIQUITINATION BY MDM2</scope>
    <scope>PHOSPHORYLATION AT SER-20</scope>
</reference>
<reference key="64">
    <citation type="journal article" date="2003" name="J. Biol. Chem.">
        <title>TP53INP1s and homeodomain-interacting protein kinase-2 (HIPK2) are partners in regulating p53 activity.</title>
        <authorList>
            <person name="Tomasini R."/>
            <person name="Samir A.A."/>
            <person name="Carrier A."/>
            <person name="Isnardon D."/>
            <person name="Cecchinelli B."/>
            <person name="Soddu S."/>
            <person name="Malissen B."/>
            <person name="Dagorn J.-C."/>
            <person name="Iovanna J.L."/>
            <person name="Dusetti N.J."/>
        </authorList>
    </citation>
    <scope>INTERACTION WITH TP53INP1</scope>
</reference>
<reference key="65">
    <citation type="journal article" date="2003" name="Mol. Cell. Biol.">
        <title>Nucleocytoplasmic shuttling of p53 is essential for MDM2-mediated cytoplasmic degradation but not ubiquitination.</title>
        <authorList>
            <person name="O'Keefe K."/>
            <person name="Li H."/>
            <person name="Zhang Y."/>
        </authorList>
    </citation>
    <scope>NUCLEOCYTOPLASMIC SHUTTLING</scope>
    <scope>NUCLEAR EXPORT SIGNAL</scope>
</reference>
<reference key="66">
    <citation type="journal article" date="2003" name="Nat. Genet.">
        <title>iASPP oncoprotein is a key inhibitor of p53 conserved from worm to human.</title>
        <authorList>
            <person name="Bergamaschi D."/>
            <person name="Samuels Y."/>
            <person name="O'Neil N.J."/>
            <person name="Trigiante G."/>
            <person name="Crook T."/>
            <person name="Hsieh J.-K."/>
            <person name="O'Connor D.J."/>
            <person name="Zhong S."/>
            <person name="Campargue I."/>
            <person name="Tomlinson M.L."/>
            <person name="Kuwabara P.E."/>
            <person name="Lu X."/>
        </authorList>
    </citation>
    <scope>FUNCTION</scope>
    <scope>INTERACTION WITH PPP1R13L; PPP1R13B AND TP53BP2</scope>
</reference>
<reference key="67">
    <citation type="journal article" date="2003" name="Proc. Natl. Acad. Sci. U.S.A.">
        <title>Characterization of cells and gene-targeted mice deficient for the p53-binding kinase homeodomain-interacting protein kinase 1 (HIPK1).</title>
        <authorList>
            <person name="Kondo S."/>
            <person name="Lu Y."/>
            <person name="Debbas M."/>
            <person name="Lin A.W."/>
            <person name="Sarosi I."/>
            <person name="Itie A."/>
            <person name="Wakeham A."/>
            <person name="Tuan J."/>
            <person name="Saris C."/>
            <person name="Elliott G."/>
            <person name="Ma W."/>
            <person name="Benchimol S."/>
            <person name="Lowe S.W."/>
            <person name="Mak T.W."/>
            <person name="Thukral S.K."/>
        </authorList>
    </citation>
    <scope>INTERACTION WITH HIPK1</scope>
</reference>
<reference key="68">
    <citation type="journal article" date="2004" name="Biochem. J.">
        <title>Alternative reading frame protein (ARF)-independent function of CARF (collaborator of ARF) involves its interactions with p53: evidence for a novel p53-activation pathway and its negative feedback control.</title>
        <authorList>
            <person name="Hasan M.K."/>
            <person name="Yaguchi T."/>
            <person name="Minoda Y."/>
            <person name="Hirano T."/>
            <person name="Taira K."/>
            <person name="Wadhwa R."/>
            <person name="Kaul S.C."/>
        </authorList>
    </citation>
    <scope>INTERACTION WITH CDKN2AIP</scope>
</reference>
<reference key="69">
    <citation type="journal article" date="2004" name="Cell">
        <title>Ordered cooperative functions of PRMT1, p300, and CARM1 in transcriptional activation by p53.</title>
        <authorList>
            <person name="An W."/>
            <person name="Kim J."/>
            <person name="Roeder R.G."/>
        </authorList>
    </citation>
    <scope>INTERACTION WITH HRMT1L2; EP300 AND CARM1</scope>
    <scope>FUNCTION</scope>
</reference>
<reference key="70">
    <citation type="journal article" date="2004" name="J. Mol. Biol.">
        <title>The Ankrd2 protein, a link between the sarcomere and the nucleus in skeletal muscle.</title>
        <authorList>
            <person name="Kojic S."/>
            <person name="Medeot E."/>
            <person name="Guccione E."/>
            <person name="Krmac H."/>
            <person name="Zara I."/>
            <person name="Martinelli V."/>
            <person name="Valle G."/>
            <person name="Faulkner G."/>
        </authorList>
    </citation>
    <scope>INTERACTION WITH ANKRD2</scope>
</reference>
<reference key="71">
    <citation type="journal article" date="2004" name="Mol. Cell">
        <title>Phosphorylation on Thr-55 by TAF1 mediates degradation of p53: a role for TAF1 in cell G1 progression.</title>
        <authorList>
            <person name="Li H.-H."/>
            <person name="Li A.G."/>
            <person name="Sheppard H.M."/>
            <person name="Liu X."/>
        </authorList>
    </citation>
    <scope>PHOSPHORYLATION AT THR-55</scope>
    <scope>MUTAGENESIS OF THR-55</scope>
    <scope>INTERACTION WITH TAF1</scope>
</reference>
<reference key="72">
    <citation type="journal article" date="2004" name="Mol. Cell">
        <title>A dynamic role of HAUSP in the p53-Mdm2 pathway.</title>
        <authorList>
            <person name="Li M."/>
            <person name="Brooks C.L."/>
            <person name="Kon N."/>
            <person name="Gu W."/>
        </authorList>
    </citation>
    <scope>DEUBIQUITINATION BY USP7</scope>
</reference>
<reference key="73">
    <citation type="journal article" date="2004" name="Mol. Cell. Biol.">
        <title>Regulation of human p53 activity and cell localization by alternative splicing.</title>
        <authorList>
            <person name="Ghosh A."/>
            <person name="Stewart D."/>
            <person name="Matlashewski G."/>
        </authorList>
    </citation>
    <scope>ALTERNATIVE SPLICING (ISOFORM 4)</scope>
    <scope>FUNCTION</scope>
    <scope>SUBCELLULAR LOCATION</scope>
    <scope>UBIQUITINATION</scope>
</reference>
<reference key="74">
    <citation type="journal article" date="2004" name="Nature">
        <title>Regulation of p53 activity through lysine methylation.</title>
        <authorList>
            <person name="Chuikov S."/>
            <person name="Kurash J.K."/>
            <person name="Wilson J.R."/>
            <person name="Xiao B."/>
            <person name="Justin N."/>
            <person name="Ivanov G.S."/>
            <person name="McKinney K."/>
            <person name="Tempst P."/>
            <person name="Prives C."/>
            <person name="Gamblin S.J."/>
            <person name="Barlev N.A."/>
            <person name="Reinberg D."/>
        </authorList>
    </citation>
    <scope>METHYLATION AT LYS-372</scope>
    <scope>MUTAGENESIS OF LYS-372</scope>
</reference>
<reference key="75">
    <citation type="journal article" date="2004" name="Nat. Cell Biol.">
        <title>A new effector pathway links ATM kinase with the DNA damage response.</title>
        <authorList>
            <person name="Demonacos C."/>
            <person name="Krstic-Demonacos M."/>
            <person name="Smith L."/>
            <person name="Xu D."/>
            <person name="O'Connor D.P."/>
            <person name="Jansson M."/>
            <person name="La Thangue N.B."/>
        </authorList>
    </citation>
    <scope>ACETYLATION AT LYS-382</scope>
</reference>
<reference key="76">
    <citation type="journal article" date="2004" name="Nat. Genet.">
        <title>Phosphorylation by aurora kinase A induces Mdm2-mediated destabilization and inhibition of p53.</title>
        <authorList>
            <person name="Katayama H."/>
            <person name="Sasai K."/>
            <person name="Kawai H."/>
            <person name="Yuan Z.M."/>
            <person name="Bondaruk J."/>
            <person name="Suzuki F."/>
            <person name="Fujii S."/>
            <person name="Arlinghaus R.B."/>
            <person name="Czerniak B.A."/>
            <person name="Sen S."/>
        </authorList>
    </citation>
    <scope>INTERACTION WITH AURKA</scope>
    <scope>PHOSPHORYLATION AT SER-315</scope>
</reference>
<reference key="77">
    <citation type="journal article" date="2005" name="Genes Dev.">
        <title>A mechanism of ubiquitin-independent proteasomal degradation of the tumor suppressors p53 and p73.</title>
        <authorList>
            <person name="Asher G."/>
            <person name="Tsvetkov P."/>
            <person name="Kahana C."/>
            <person name="Shaul Y."/>
        </authorList>
    </citation>
    <scope>INTERACTION WITH NQO1</scope>
</reference>
<reference key="78">
    <citation type="journal article" date="2005" name="Genes Dev.">
        <title>NIR is a novel INHAT repressor that modulates the transcriptional activity of p53.</title>
        <authorList>
            <person name="Hublitz P."/>
            <person name="Kunowska N."/>
            <person name="Mayer U.P."/>
            <person name="Muller J.M."/>
            <person name="Heyne K."/>
            <person name="Yin N."/>
            <person name="Fritzsche C."/>
            <person name="Poli C."/>
            <person name="Miguet L."/>
            <person name="Schupp I.W."/>
            <person name="van Grunsven L.A."/>
            <person name="Potiers N."/>
            <person name="van Dorsselaer A."/>
            <person name="Metzger E."/>
            <person name="Roemer K."/>
            <person name="Schule R."/>
        </authorList>
    </citation>
    <scope>INTERACTION WITH NOC2L</scope>
</reference>
<reference key="79">
    <citation type="journal article" date="2005" name="J. Biol. Chem.">
        <title>Tumor suppressor SMAR1 activates and stabilizes p53 through its arginine-serine-rich motif.</title>
        <authorList>
            <person name="Jalota-Badhwar A."/>
            <person name="Singh K."/>
            <person name="Pavithra L."/>
            <person name="Kaul-Ghanekar R."/>
            <person name="Jameel S."/>
            <person name="Chattopadhyay S."/>
        </authorList>
    </citation>
    <scope>RETRACTED PAPER</scope>
</reference>
<reference key="80">
    <citation type="journal article" date="2020" name="J. Biol. Chem.">
        <authorList>
            <person name="Jalota A."/>
            <person name="Singh K."/>
            <person name="Pavithra L."/>
            <person name="Kaul-Ghanekar R."/>
            <person name="Jameel S."/>
            <person name="Chattopadhyay S."/>
        </authorList>
    </citation>
    <scope>RETRACTION NOTICE OF PUBMED:15701641</scope>
</reference>
<reference key="81">
    <citation type="journal article" date="2005" name="J. Biol. Chem.">
        <title>Direct interaction of the N-terminal domain of focal adhesion kinase with the N-terminal transactivation domain of p53.</title>
        <authorList>
            <person name="Golubovskaya V.M."/>
            <person name="Finch R."/>
            <person name="Cance W.G."/>
        </authorList>
    </citation>
    <scope>INTERACTION WITH PTK2/FAK1</scope>
</reference>
<reference key="82">
    <citation type="journal article" date="2005" name="J. Biol. Chem.">
        <title>WOX1 is essential for tumor necrosis factor-, UV light-, staurosporine-, and p53-mediated cell death, and its tyrosine 33-phosphorylated form binds and stabilizes serine 46-phosphorylated p53.</title>
        <authorList>
            <person name="Chang N.-S."/>
            <person name="Doherty J."/>
            <person name="Ensign A."/>
            <person name="Schultz L."/>
            <person name="Hsu L.-J."/>
            <person name="Hong Q."/>
        </authorList>
    </citation>
    <scope>INTERACTION WITH WWOX</scope>
    <scope>MUTAGENESIS OF SER-46</scope>
</reference>
<reference key="83">
    <citation type="journal article" date="2005" name="Mol. Cell">
        <title>AMP-activated protein kinase induces a p53-dependent metabolic checkpoint.</title>
        <authorList>
            <person name="Jones R.G."/>
            <person name="Plas D.R."/>
            <person name="Kubek S."/>
            <person name="Buzzai M."/>
            <person name="Mu J."/>
            <person name="Xu Y."/>
            <person name="Birnbaum M.J."/>
            <person name="Thompson C.B."/>
        </authorList>
    </citation>
    <scope>PHOSPHORYLATION AT SER-15</scope>
</reference>
<reference key="84">
    <citation type="journal article" date="2006" name="Cancer Res.">
        <title>LKB1 is recruited to the p21/WAF1 promoter by p53 to mediate transcriptional activation.</title>
        <authorList>
            <person name="Zeng P.Y."/>
            <person name="Berger S.L."/>
        </authorList>
    </citation>
    <scope>INTERACTION WITH STK11/LKB1</scope>
    <scope>PHOSPHORYLATION AT SER-15 AND SER-392</scope>
</reference>
<reference key="85">
    <citation type="journal article" date="2006" name="FEBS J.">
        <title>The subcellular localization of vaccinia-related kinase-2 (VRK2) isoforms determines their different effect on p53 stability in tumour cell lines.</title>
        <authorList>
            <person name="Blanco S."/>
            <person name="Klimcakova L."/>
            <person name="Vega F.M."/>
            <person name="Lazo P.A."/>
        </authorList>
    </citation>
    <scope>PHOSPHORYLATION AT THR-18</scope>
</reference>
<reference key="86">
    <citation type="journal article" date="2006" name="FEBS Lett.">
        <title>Protein kinase A phosphorylates and regulates dimerization of 14-3-3 epsilon.</title>
        <authorList>
            <person name="Gu Y.-M."/>
            <person name="Jin Y.-H."/>
            <person name="Choi J.-K."/>
            <person name="Baek K.-H."/>
            <person name="Yeo C.-Y."/>
            <person name="Lee K.-Y."/>
        </authorList>
    </citation>
    <scope>INTERACTION WITH YWHAZ</scope>
</reference>
<reference key="87">
    <citation type="journal article" date="2006" name="J. Biol. Chem.">
        <title>Protein kinase C delta regulates Ser46 phosphorylation of p53 tumor suppressor in the apoptotic response to DNA damage.</title>
        <authorList>
            <person name="Yoshida K."/>
            <person name="Liu H."/>
            <person name="Miki Y."/>
        </authorList>
    </citation>
    <scope>PHOSPHORYLATION AT SER-46</scope>
    <scope>INTERACTION WITH PRKCG</scope>
</reference>
<reference key="88">
    <citation type="journal article" date="2006" name="Mol. Cell">
        <title>Acetylation of the p53 DNA-binding domain regulates apoptosis induction.</title>
        <authorList>
            <person name="Sykes S.M."/>
            <person name="Mellert H.S."/>
            <person name="Holbert M.A."/>
            <person name="Li K."/>
            <person name="Marmorstein R."/>
            <person name="Lane W.S."/>
            <person name="McMahon S.B."/>
        </authorList>
    </citation>
    <scope>FUNCTION</scope>
    <scope>ACETYLATION AT LYS-120</scope>
    <scope>VARIANTS ARG-120; GLU-120 AND MET-120</scope>
    <scope>CHARACTERIZATION OF VARIANTS ARG-120; GLU-120 AND MET-120</scope>
</reference>
<reference key="89">
    <citation type="journal article" date="2006" name="Nature">
        <title>Repression of p53 activity by Smyd2-mediated methylation.</title>
        <authorList>
            <person name="Huang J."/>
            <person name="Perez-Burgos L."/>
            <person name="Placek B.J."/>
            <person name="Sengupta R."/>
            <person name="Richter M."/>
            <person name="Dorsey J.A."/>
            <person name="Kubicek S."/>
            <person name="Opravil S."/>
            <person name="Jenuwein T."/>
            <person name="Berger S.L."/>
        </authorList>
    </citation>
    <scope>METHYLATION AT LYS-370</scope>
    <scope>MUTAGENESIS OF LYS-370</scope>
</reference>
<reference key="90">
    <citation type="journal article" date="2006" name="Nat. Cell Biol.">
        <title>Critical role for Daxx in regulating Mdm2.</title>
        <authorList>
            <person name="Tang J."/>
            <person name="Qu L.K."/>
            <person name="Zhang J."/>
            <person name="Wang W."/>
            <person name="Michaelson J.S."/>
            <person name="Degenhardt Y.Y."/>
            <person name="El-Deiry W.S."/>
            <person name="Yang X."/>
        </authorList>
    </citation>
    <scope>INTERACTION WITH DAXX</scope>
</reference>
<reference key="91">
    <citation type="journal article" date="2006" name="Nat. Struct. Mol. Biol.">
        <title>Structural basis for the methylation site specificity of SET7/9.</title>
        <authorList>
            <person name="Couture J.-F."/>
            <person name="Collazo E."/>
            <person name="Hauk G."/>
            <person name="Trievel R.C."/>
        </authorList>
    </citation>
    <scope>MOTIF</scope>
    <scope>METHYLATION AT LYS-372</scope>
</reference>
<reference key="92">
    <citation type="journal article" date="2006" name="Nucleic Acids Res.">
        <title>Brn-3b enhances the pro-apoptotic effects of p53 but not its induction of cell cycle arrest by cooperating in trans-activation of bax expression.</title>
        <authorList>
            <person name="Budhram-Mahadeo V.S."/>
            <person name="Bowen S."/>
            <person name="Lee S."/>
            <person name="Perez-Sanchez C."/>
            <person name="Ensor E."/>
            <person name="Morris P.J."/>
            <person name="Latchman D.S."/>
        </authorList>
    </citation>
    <scope>INTERACTION WITH POU4F2</scope>
</reference>
<reference key="93">
    <citation type="journal article" date="2007" name="Cell">
        <title>PRAK is essential for ras-induced senescence and tumor suppression.</title>
        <authorList>
            <person name="Sun P."/>
            <person name="Yoshizuka N."/>
            <person name="New L."/>
            <person name="Moser B.A."/>
            <person name="Li Y."/>
            <person name="Liao R."/>
            <person name="Xie C."/>
            <person name="Chen J."/>
            <person name="Deng Q."/>
            <person name="Yamout M."/>
            <person name="Dong M.Q."/>
            <person name="Frangou C.G."/>
            <person name="Yates J.R. III"/>
            <person name="Wright P.E."/>
            <person name="Han J."/>
        </authorList>
    </citation>
    <scope>PHOSPHORYLATION AT SER-37</scope>
    <scope>MUTAGENESIS OF SER-37</scope>
</reference>
<reference key="94">
    <citation type="journal article" date="2007" name="Cell">
        <title>Hzf Determines cell survival upon genotoxic stress by modulating p53 transactivation.</title>
        <authorList>
            <person name="Das S."/>
            <person name="Raj L."/>
            <person name="Zhao B."/>
            <person name="Kimura Y."/>
            <person name="Bernstein A."/>
            <person name="Aaronson S.A."/>
            <person name="Lee S.W."/>
        </authorList>
    </citation>
    <scope>INTERACTION WITH ZNF385A</scope>
    <scope>CHARACTERIZATION OF VARIANTS ALA-143; HIS-175 AND PRO-175</scope>
</reference>
<reference key="95">
    <citation type="journal article" date="2007" name="EMBO J.">
        <title>Cytoplasmic destruction of p53 by the endoplasmic reticulum-resident ubiquitin ligase 'Synoviolin'.</title>
        <authorList>
            <person name="Yamasaki S."/>
            <person name="Yagishita N."/>
            <person name="Sasaki T."/>
            <person name="Nakazawa M."/>
            <person name="Kato Y."/>
            <person name="Yamadera T."/>
            <person name="Bae E."/>
            <person name="Toriyama S."/>
            <person name="Ikeda R."/>
            <person name="Zhang L."/>
            <person name="Fujitani K."/>
            <person name="Yoo E."/>
            <person name="Tsuchimochi K."/>
            <person name="Ohta T."/>
            <person name="Araya N."/>
            <person name="Fujita H."/>
            <person name="Aratani S."/>
            <person name="Eguchi K."/>
            <person name="Komiya S."/>
            <person name="Maruyama I."/>
            <person name="Higashi N."/>
            <person name="Sato M."/>
            <person name="Senoo H."/>
            <person name="Ochi T."/>
            <person name="Yokoyama S."/>
            <person name="Amano T."/>
            <person name="Kim J."/>
            <person name="Gay S."/>
            <person name="Fukamizu A."/>
            <person name="Nishioka K."/>
            <person name="Tanaka K."/>
            <person name="Nakajima T."/>
        </authorList>
    </citation>
    <scope>UBIQUITINATION</scope>
    <scope>INTERACTION WITH SYVN1</scope>
    <scope>SUBCELLULAR LOCATION</scope>
</reference>
<reference key="96">
    <citation type="journal article" date="2007" name="EMBO J.">
        <title>A specific PP2A regulatory subunit, B56gamma, mediates DNA damage-induced dephosphorylation of p53 at Thr55.</title>
        <authorList>
            <person name="Li H.H."/>
            <person name="Cai X."/>
            <person name="Shouse G.P."/>
            <person name="Piluso L.G."/>
            <person name="Liu X."/>
        </authorList>
    </citation>
    <scope>INTERACTION WITH PPP2CA; PPP2R1A; PPP2R2A AND PPP2R5C</scope>
</reference>
<reference key="97">
    <citation type="journal article" date="2007" name="FEBS Lett.">
        <title>SVH-B interacts directly with p53 and suppresses the transcriptional activity of p53.</title>
        <authorList>
            <person name="Zhou X."/>
            <person name="Yang G."/>
            <person name="Huang R."/>
            <person name="Chen X."/>
            <person name="Hu G."/>
        </authorList>
    </citation>
    <scope>INTERACTION WITH ARMC10</scope>
</reference>
<reference key="98">
    <citation type="journal article" date="2007" name="FEBS Lett.">
        <title>Novel homeodomain-interacting protein kinase family member, HIPK4, phosphorylates human p53 at serine 9.</title>
        <authorList>
            <person name="Arai S."/>
            <person name="Matsushita A."/>
            <person name="Du K."/>
            <person name="Yagi K."/>
            <person name="Okazaki Y."/>
            <person name="Kurokawa R."/>
        </authorList>
    </citation>
    <scope>PHOSPHORYLATION AT SER-9</scope>
</reference>
<reference key="99">
    <citation type="journal article" date="2007" name="Genomics">
        <title>Nine-amino-acid transactivation domain: establishment and prediction utilities.</title>
        <authorList>
            <person name="Piskacek S."/>
            <person name="Gregor M."/>
            <person name="Nemethova M."/>
            <person name="Grabner M."/>
            <person name="Kovarik P."/>
            <person name="Piskacek M."/>
        </authorList>
    </citation>
    <scope>DOMAIN</scope>
</reference>
<reference key="100">
    <citation type="journal article" date="2007" name="J. Biol. Chem.">
        <title>CARPs are ubiquitin ligases that promote MDM2-independent p53 and phospho-p53ser20 degradation.</title>
        <authorList>
            <person name="Yang W."/>
            <person name="Rozan L.M."/>
            <person name="McDonald E.R. III"/>
            <person name="Navaraj A."/>
            <person name="Liu J.J."/>
            <person name="Matthew E.M."/>
            <person name="Wang W."/>
            <person name="Dicker D.T."/>
            <person name="El-Deiry W.S."/>
        </authorList>
    </citation>
    <scope>INTERACTION WITH RFFL AND RNF34</scope>
</reference>
<reference key="101">
    <citation type="journal article" date="2007" name="J. Biol. Chem.">
        <title>The notch regulator MAML1 interacts with p53 and functions as a coactivator.</title>
        <authorList>
            <person name="Zhao Y."/>
            <person name="Katzman R.B."/>
            <person name="Delmolino L.M."/>
            <person name="Bhat I."/>
            <person name="Zhang Y."/>
            <person name="Gurumurthy C.B."/>
            <person name="Germaniuk-Kurowska A."/>
            <person name="Reddi H.V."/>
            <person name="Solomon A."/>
            <person name="Zeng M.S."/>
            <person name="Kung A."/>
            <person name="Ma H."/>
            <person name="Gao Q."/>
            <person name="Dimri G."/>
            <person name="Stanculescu A."/>
            <person name="Miele L."/>
            <person name="Wu L."/>
            <person name="Griffin J.D."/>
            <person name="Wazer D.E."/>
            <person name="Band H."/>
            <person name="Band V."/>
        </authorList>
    </citation>
    <scope>FUNCTION</scope>
    <scope>INTERACTION WITH MAML1</scope>
</reference>
<reference key="102">
    <citation type="journal article" date="2007" name="J. Cell Sci.">
        <title>Stabilization and activation of p53 induced by Cdk5 contributes to neuronal cell death.</title>
        <authorList>
            <person name="Lee J.-H."/>
            <person name="Kim H.-S."/>
            <person name="Lee S.-J."/>
            <person name="Kim K.-T."/>
        </authorList>
    </citation>
    <scope>PHOSPHORYLATION AT SER-15; SER-33 AND SER-46</scope>
    <scope>INTERACTION WITH CDK5</scope>
    <scope>SUBCELLULAR LOCATION</scope>
</reference>
<reference key="103">
    <citation type="journal article" date="2007" name="Mol. Biol. Cell">
        <title>Dynamic regulation of p53 subnuclear localization and senescence by MORC3.</title>
        <authorList>
            <person name="Takahashi K."/>
            <person name="Yoshida N."/>
            <person name="Murakami N."/>
            <person name="Kawata K."/>
            <person name="Ishizaki H."/>
            <person name="Tanaka-Okamoto M."/>
            <person name="Miyoshi J."/>
            <person name="Zinn A.R."/>
            <person name="Shime H."/>
            <person name="Inoue N."/>
        </authorList>
    </citation>
    <scope>INTERACTION WITH MORC3</scope>
</reference>
<reference key="104">
    <citation type="journal article" date="2007" name="Mol. Cell">
        <title>DYRK2 is targeted to the nucleus and controls p53 via Ser46 phosphorylation in the apoptotic response to DNA damage.</title>
        <authorList>
            <person name="Taira N."/>
            <person name="Nihira K."/>
            <person name="Yamaguchi T."/>
            <person name="Miki Y."/>
            <person name="Yoshida K."/>
        </authorList>
    </citation>
    <scope>FUNCTION</scope>
    <scope>PHOSPHORYLATION AT SER-46</scope>
    <scope>MUTAGENESIS OF SER-46</scope>
</reference>
<reference key="105">
    <citation type="journal article" date="2007" name="Nature">
        <title>p53 is regulated by the lysine demethylase LSD1.</title>
        <authorList>
            <person name="Huang J."/>
            <person name="Sengupta R."/>
            <person name="Espejo A.B."/>
            <person name="Lee M.G."/>
            <person name="Dorsey J.A."/>
            <person name="Richter M."/>
            <person name="Opravil S."/>
            <person name="Shiekhattar R."/>
            <person name="Bedford M.T."/>
            <person name="Jenuwein T."/>
            <person name="Berger S.L."/>
        </authorList>
    </citation>
    <scope>DEMETHYLATION BY KDM1A</scope>
</reference>
<reference key="106">
    <citation type="journal article" date="2007" name="Mol. Cell">
        <title>Modulation of p53 function by SET8-mediated methylation at lysine 382.</title>
        <authorList>
            <person name="Shi X."/>
            <person name="Kachirskaia I."/>
            <person name="Yamaguchi H."/>
            <person name="West L.E."/>
            <person name="Wen H."/>
            <person name="Wang E.W."/>
            <person name="Dutta S."/>
            <person name="Appella E."/>
            <person name="Gozani O."/>
        </authorList>
    </citation>
    <scope>METHYLATION AT LYS-382</scope>
    <scope>MUTAGENESIS OF LYS-382</scope>
</reference>
<reference key="107">
    <citation type="journal article" date="2007" name="Science">
        <title>ATM and ATR substrate analysis reveals extensive protein networks responsive to DNA damage.</title>
        <authorList>
            <person name="Matsuoka S."/>
            <person name="Ballif B.A."/>
            <person name="Smogorzewska A."/>
            <person name="McDonald E.R. III"/>
            <person name="Hurov K.E."/>
            <person name="Luo J."/>
            <person name="Bakalarski C.E."/>
            <person name="Zhao Z."/>
            <person name="Solimini N."/>
            <person name="Lerenthal Y."/>
            <person name="Shiloh Y."/>
            <person name="Gygi S.P."/>
            <person name="Elledge S.J."/>
        </authorList>
    </citation>
    <scope>IDENTIFICATION BY MASS SPECTROMETRY [LARGE SCALE ANALYSIS]</scope>
    <source>
        <tissue>Embryonic kidney</tissue>
    </source>
</reference>
<reference key="108">
    <citation type="journal article" date="2008" name="Biochem. Biophys. Res. Commun.">
        <title>Sirt2 interacts with 14-3-3 beta/gamma and down-regulates the activity of p53.</title>
        <authorList>
            <person name="Jin Y.H."/>
            <person name="Kim Y.J."/>
            <person name="Kim D.W."/>
            <person name="Baek K.H."/>
            <person name="Kang B.Y."/>
            <person name="Yeo C.Y."/>
            <person name="Lee K.Y."/>
        </authorList>
    </citation>
    <scope>ACETYLATION</scope>
    <scope>DEACETYLATION BY SIRT2</scope>
</reference>
<reference key="109">
    <citation type="journal article" date="2008" name="Cell. Signal.">
        <title>Histone methyltransferase protein SETD2 interacts with p53 and selectively regulates its downstream genes.</title>
        <authorList>
            <person name="Xie P."/>
            <person name="Tian C."/>
            <person name="An L."/>
            <person name="Nie J."/>
            <person name="Lu K."/>
            <person name="Xing G."/>
            <person name="Zhang L."/>
            <person name="He F."/>
        </authorList>
    </citation>
    <scope>INTERACTION WITH SETD2</scope>
</reference>
<reference key="110">
    <citation type="journal article" date="2008" name="Curr. Cancer Drug Targets">
        <title>NUPR1 interacts with p53, transcriptionally regulates p21 and rescues breast epithelial cells from doxorubicin-induced genotoxic stress.</title>
        <authorList>
            <person name="Clark D.W."/>
            <person name="Mitra A."/>
            <person name="Fillmore R.A."/>
            <person name="Jiang W.G."/>
            <person name="Samant R.S."/>
            <person name="Fodstad O."/>
            <person name="Shevde L.A."/>
        </authorList>
    </citation>
    <scope>INTERACTION WITH NUPR1</scope>
</reference>
<reference key="111">
    <citation type="journal article" date="2008" name="Mol. Cell">
        <title>Nuclear FAK promotes cell proliferation and survival through FERM-enhanced p53 degradation.</title>
        <authorList>
            <person name="Lim S.T."/>
            <person name="Chen X.L."/>
            <person name="Lim Y."/>
            <person name="Hanson D.A."/>
            <person name="Vo T.T."/>
            <person name="Howerton K."/>
            <person name="Larocque N."/>
            <person name="Fisher S.J."/>
            <person name="Schlaepfer D.D."/>
            <person name="Ilic D."/>
        </authorList>
    </citation>
    <scope>UBIQUITINATION</scope>
    <scope>SUBCELLULAR LOCATION</scope>
</reference>
<reference key="112">
    <citation type="journal article" date="2008" name="Mol. Cell. Biol.">
        <title>Hbo1 Links p53-dependent stress signaling to DNA replication licensing.</title>
        <authorList>
            <person name="Iizuka M."/>
            <person name="Sarmento O.F."/>
            <person name="Sekiya T."/>
            <person name="Scrable H."/>
            <person name="Allis C.D."/>
            <person name="Smith M.M."/>
        </authorList>
    </citation>
    <scope>INTERACTION WITH KAT7</scope>
</reference>
<reference key="113">
    <citation type="journal article" date="2008" name="Mol. Cell. Biol.">
        <title>Serine 15 phosphorylation of p53 directs its interaction with B56gamma and the tumor suppressor activity of B56gamma-specific protein phosphatase 2A.</title>
        <authorList>
            <person name="Shouse G.P."/>
            <person name="Cai X."/>
            <person name="Liu X."/>
        </authorList>
    </citation>
    <scope>INTERACTION WITH PPP2CA; PPP2R1A AND PPP2R5C</scope>
    <scope>PHOSPHORYLATION AT SER-15 BY ATM</scope>
    <scope>MUTAGENESIS OF SER-15</scope>
</reference>
<reference key="114">
    <citation type="journal article" date="2009" name="Anal. Chem.">
        <title>Lys-N and trypsin cover complementary parts of the phosphoproteome in a refined SCX-based approach.</title>
        <authorList>
            <person name="Gauci S."/>
            <person name="Helbig A.O."/>
            <person name="Slijper M."/>
            <person name="Krijgsveld J."/>
            <person name="Heck A.J."/>
            <person name="Mohammed S."/>
        </authorList>
    </citation>
    <scope>IDENTIFICATION BY MASS SPECTROMETRY [LARGE SCALE ANALYSIS]</scope>
</reference>
<reference key="115">
    <citation type="journal article" date="2009" name="EMBO J.">
        <title>Differential regulation of p53 and p21 by MKRN1 E3 ligase controls cell cycle arrest and apoptosis.</title>
        <authorList>
            <person name="Lee E.-W."/>
            <person name="Lee M.-S."/>
            <person name="Camus S."/>
            <person name="Ghim J."/>
            <person name="Yang M.-R."/>
            <person name="Oh W."/>
            <person name="Ha N.-C."/>
            <person name="Lane D.P."/>
            <person name="Song J."/>
        </authorList>
    </citation>
    <scope>INTERACTION WITH MKRN1</scope>
    <scope>MUTAGENESIS OF 291-LYS-LYS-292</scope>
    <scope>UBIQUITINATION AT LYS-291 AND LYS-292 BY MKRN1</scope>
</reference>
<reference key="116">
    <citation type="journal article" date="2009" name="J. Biol. Chem.">
        <title>Plk1-mediated phosphorylation of Topors regulates p53 stability.</title>
        <authorList>
            <person name="Yang X."/>
            <person name="Li H."/>
            <person name="Zhou Z."/>
            <person name="Wang W.H."/>
            <person name="Deng A."/>
            <person name="Andrisani O."/>
            <person name="Liu X."/>
        </authorList>
    </citation>
    <scope>UBIQUITINATION BY TOPORS</scope>
</reference>
<reference key="117">
    <citation type="journal article" date="2009" name="J. Biol. Chem.">
        <title>MSL2 promotes Mdm2-independent cytoplasmic localization of p53.</title>
        <authorList>
            <person name="Kruse J.P."/>
            <person name="Gu W."/>
        </authorList>
    </citation>
    <scope>UBIQUITINATION AT LYS-351 AND LYS-357</scope>
    <scope>SUBCELLULAR LOCATION</scope>
</reference>
<reference key="118">
    <citation type="journal article" date="2009" name="J. Biol. Chem.">
        <title>MTA1 coregulator regulates p53 stability and function.</title>
        <authorList>
            <person name="Li D.Q."/>
            <person name="Divijendra Natha Reddy S."/>
            <person name="Pakala S.B."/>
            <person name="Wu X."/>
            <person name="Zhang Y."/>
            <person name="Rayala S.K."/>
            <person name="Kumar R."/>
        </authorList>
    </citation>
    <scope>INTERACTION WITH MTA1 AND COP1</scope>
    <scope>UBIQUITINATION</scope>
</reference>
<reference key="119">
    <citation type="journal article" date="2009" name="J. Virol.">
        <title>Human cytomegalovirus IE1-72 protein interacts with p53 and inhibits p53-dependent transactivation by a mechanism different from that of IE2-86 protein.</title>
        <authorList>
            <person name="Hwang E.S."/>
            <person name="Zhang Z."/>
            <person name="Cai H."/>
            <person name="Huang D.Y."/>
            <person name="Huong S.M."/>
            <person name="Cha C.Y."/>
            <person name="Huang E.S."/>
        </authorList>
    </citation>
    <scope>INTERACTION WITH HHV-5 PROTEIN UL123 (MICROBIAL INFECTION)</scope>
</reference>
<reference key="120">
    <citation type="journal article" date="2009" name="Mol. Cell">
        <title>Two mammalian MOF complexes regulate transcription activation by distinct mechanisms.</title>
        <authorList>
            <person name="Li X."/>
            <person name="Wu L."/>
            <person name="Corsa C.A."/>
            <person name="Kunkel S."/>
            <person name="Dou Y."/>
        </authorList>
    </citation>
    <scope>ACETYLATION AT LYS-120</scope>
</reference>
<reference key="121">
    <citation type="journal article" date="2009" name="Proc. Natl. Acad. Sci. U.S.A.">
        <title>JFK, a Kelch domain-containing F-box protein, links the SCF complex to p53 regulation.</title>
        <authorList>
            <person name="Sun L."/>
            <person name="Shi L."/>
            <person name="Li W."/>
            <person name="Yu W."/>
            <person name="Liang J."/>
            <person name="Zhang H."/>
            <person name="Yang X."/>
            <person name="Wang Y."/>
            <person name="Li R."/>
            <person name="Yao X."/>
            <person name="Yi X."/>
            <person name="Shang Y."/>
        </authorList>
    </citation>
    <scope>INTERACTION WITH FBXO42</scope>
</reference>
<reference key="122">
    <citation type="journal article" date="2009" name="Proc. Natl. Acad. Sci. U.S.A.">
        <title>Trim24 targets endogenous p53 for degradation.</title>
        <authorList>
            <person name="Allton K."/>
            <person name="Jain A.K."/>
            <person name="Herz H.M."/>
            <person name="Tsai W.W."/>
            <person name="Jung S.Y."/>
            <person name="Qin J."/>
            <person name="Bergmann A."/>
            <person name="Johnson R.L."/>
            <person name="Barton M.C."/>
        </authorList>
    </citation>
    <scope>FUNCTION</scope>
    <scope>UBIQUITINATION</scope>
    <scope>INTERACTION WITH TRIM24</scope>
</reference>
<reference key="123">
    <citation type="journal article" date="2009" name="Science">
        <title>Lysine acetylation targets protein complexes and co-regulates major cellular functions.</title>
        <authorList>
            <person name="Choudhary C."/>
            <person name="Kumar C."/>
            <person name="Gnad F."/>
            <person name="Nielsen M.L."/>
            <person name="Rehman M."/>
            <person name="Walther T.C."/>
            <person name="Olsen J.V."/>
            <person name="Mann M."/>
        </authorList>
    </citation>
    <scope>ACETYLATION [LARGE SCALE ANALYSIS] AT LYS-381 AND LYS-382</scope>
    <scope>IDENTIFICATION BY MASS SPECTROMETRY [LARGE SCALE ANALYSIS]</scope>
</reference>
<reference key="124">
    <citation type="journal article" date="2010" name="BMC Mol. Biol.">
        <title>TAF6delta orchestrates an apoptotic transcriptome profile and interacts functionally with p53.</title>
        <authorList>
            <person name="Wilhelm E."/>
            <person name="Kornete M."/>
            <person name="Targat B."/>
            <person name="Vigneault-Edwards J."/>
            <person name="Frontini M."/>
            <person name="Tora L."/>
            <person name="Benecke A."/>
            <person name="Bell B."/>
        </authorList>
    </citation>
    <scope>INTERACTION WITH TAF6 ISOFORMS 1 AND 4</scope>
</reference>
<reference key="125">
    <citation type="journal article" date="2010" name="Cell">
        <title>USP10 regulates p53 localization and stability by deubiquitinating p53.</title>
        <authorList>
            <person name="Yuan J."/>
            <person name="Luo K."/>
            <person name="Zhang L."/>
            <person name="Cheville J.C."/>
            <person name="Lou Z."/>
        </authorList>
    </citation>
    <scope>UBIQUITINATION</scope>
    <scope>DEUBIQUITINATION BY USP10</scope>
</reference>
<reference key="126">
    <citation type="journal article" date="2010" name="Cell">
        <title>A large intergenic noncoding RNA induced by p53 mediates global gene repression in the p53 response.</title>
        <authorList>
            <person name="Huarte M."/>
            <person name="Guttman M."/>
            <person name="Feldser D."/>
            <person name="Garber M."/>
            <person name="Koziol M.J."/>
            <person name="Kenzelmann-Broz D."/>
            <person name="Khalil A.M."/>
            <person name="Zuk O."/>
            <person name="Amit I."/>
            <person name="Rabani M."/>
            <person name="Attardi L.D."/>
            <person name="Regev A."/>
            <person name="Lander E.S."/>
            <person name="Jacks T."/>
            <person name="Rinn J.L."/>
        </authorList>
    </citation>
    <scope>FUNCTION</scope>
</reference>
<reference key="127">
    <citation type="journal article" date="2010" name="Cell. Mol. Life Sci.">
        <title>Isoform specific phosphorylation of p53 by protein kinase CK1.</title>
        <authorList>
            <person name="Venerando A."/>
            <person name="Marin O."/>
            <person name="Cozza G."/>
            <person name="Bustos V.H."/>
            <person name="Sarno S."/>
            <person name="Pinna L.A."/>
        </authorList>
    </citation>
    <scope>PHOSPHORYLATION AT SER-20 BY CSNK1D/CK1</scope>
</reference>
<reference key="128">
    <citation type="journal article" date="2010" name="FEBS Lett.">
        <title>p53 inhibits tumor cell invasion via the degradation of snail protein in hepatocellular carcinoma.</title>
        <authorList>
            <person name="Lim S.O."/>
            <person name="Kim H."/>
            <person name="Jung G."/>
        </authorList>
    </citation>
    <scope>INTERACTION WITH SNAI1</scope>
    <scope>CHARACTERIZATION OF VARIANTS LEU-110; PRO-155; HIS-175; SER-232; SER-249; HIS-273 AND TRP-282</scope>
    <scope>MUTAGENESIS OF ARG-248</scope>
</reference>
<reference key="129">
    <citation type="journal article" date="2010" name="J. Biol. Chem.">
        <title>Pyk2 inhibition of p53 as an adaptive and intrinsic mechanism facilitating cell proliferation and survival.</title>
        <authorList>
            <person name="Lim S.T."/>
            <person name="Miller N.L."/>
            <person name="Nam J.O."/>
            <person name="Chen X.L."/>
            <person name="Lim Y."/>
            <person name="Schlaepfer D.D."/>
        </authorList>
    </citation>
    <scope>INTERACTION WITH PTK2B/PYK2 AND MDM2</scope>
    <scope>UBIQUITINATION</scope>
    <scope>SUBCELLULAR LOCATION</scope>
</reference>
<reference key="130">
    <citation type="journal article" date="2010" name="J. Biol. Chem.">
        <title>G9a and Glp methylate lysine 373 in the tumor suppressor p53.</title>
        <authorList>
            <person name="Huang J."/>
            <person name="Dorsey J."/>
            <person name="Chuikov S."/>
            <person name="Perez-Burgos L."/>
            <person name="Zhang X."/>
            <person name="Jenuwein T."/>
            <person name="Reinberg D."/>
            <person name="Berger S.L."/>
        </authorList>
    </citation>
    <scope>METHYLATION AT LYS-373</scope>
    <scope>MUTAGENESIS OF LYS-373</scope>
</reference>
<reference key="131">
    <citation type="journal article" date="2010" name="J. Biol. Chem.">
        <authorList>
            <person name="Huang J."/>
            <person name="Dorsey J."/>
            <person name="Chuikov S."/>
            <person name="Perez-Burgos L."/>
            <person name="Zhang X."/>
            <person name="Jenuwein T."/>
            <person name="Reinberg D."/>
            <person name="Berger S.L."/>
        </authorList>
    </citation>
    <scope>ERRATUM OF PUBMED:20118233</scope>
</reference>
<reference key="132">
    <citation type="journal article" date="2010" name="J. Biol. Chem.">
        <title>G-protein-coupled receptor kinase 5 phosphorylates p53 and inhibits DNA damage-induced apoptosis.</title>
        <authorList>
            <person name="Chen X."/>
            <person name="Zhu H."/>
            <person name="Yuan M."/>
            <person name="Fu J."/>
            <person name="Zhou Y."/>
            <person name="Ma L."/>
        </authorList>
    </citation>
    <scope>PHOSPHORYLATION AT THR-55</scope>
    <scope>INTERACTION WITH GRK5</scope>
</reference>
<reference key="133">
    <citation type="journal article" date="2010" name="Nat. Cell Biol.">
        <title>BRD7 is a candidate tumour suppressor gene required for p53 function.</title>
        <authorList>
            <person name="Drost J."/>
            <person name="Mantovani F."/>
            <person name="Tocco F."/>
            <person name="Elkon R."/>
            <person name="Comel A."/>
            <person name="Holstege H."/>
            <person name="Kerkhoven R."/>
            <person name="Jonkers J."/>
            <person name="Voorhoeve P.M."/>
            <person name="Agami R."/>
            <person name="Del Sal G."/>
        </authorList>
    </citation>
    <scope>INTERACTION WITH BRD7</scope>
    <scope>ACETYLATION AT LYS-382</scope>
</reference>
<reference key="134">
    <citation type="journal article" date="2010" name="Proc. Natl. Acad. Sci. U.S.A.">
        <title>RFWD3-Mdm2 ubiquitin ligase complex positively regulates p53 stability in response to DNA damage.</title>
        <authorList>
            <person name="Fu X."/>
            <person name="Yucer N."/>
            <person name="Liu S."/>
            <person name="Li M."/>
            <person name="Yi P."/>
            <person name="Mu J.J."/>
            <person name="Yang T."/>
            <person name="Chu J."/>
            <person name="Jung S.Y."/>
            <person name="O'Malley B.W."/>
            <person name="Gu W."/>
            <person name="Qin J."/>
            <person name="Wang Y."/>
        </authorList>
    </citation>
    <scope>UBIQUITINATION BY RFWD3</scope>
</reference>
<reference key="135">
    <citation type="journal article" date="2010" name="Proc. Natl. Acad. Sci. U.S.A.">
        <title>Polybromo-associated BRG1-associated factor components BRD7 and BAF180 are critical regulators of p53 required for induction of replicative senescence.</title>
        <authorList>
            <person name="Burrows A.E."/>
            <person name="Smogorzewska A."/>
            <person name="Elledge S.J."/>
        </authorList>
    </citation>
    <scope>INTERACTION WITH BRD7</scope>
</reference>
<reference key="136">
    <citation type="journal article" date="2011" name="BMC Syst. Biol.">
        <title>Initial characterization of the human central proteome.</title>
        <authorList>
            <person name="Burkard T.R."/>
            <person name="Planyavsky M."/>
            <person name="Kaupe I."/>
            <person name="Breitwieser F.P."/>
            <person name="Buerckstuemmer T."/>
            <person name="Bennett K.L."/>
            <person name="Superti-Furga G."/>
            <person name="Colinge J."/>
        </authorList>
    </citation>
    <scope>IDENTIFICATION BY MASS SPECTROMETRY [LARGE SCALE ANALYSIS]</scope>
</reference>
<reference key="137">
    <citation type="journal article" date="2011" name="Cell Cycle">
        <title>NIRF constitutes a nodal point in the cell cycle network and is a candidate tumor suppressor.</title>
        <authorList>
            <person name="Mori T."/>
            <person name="Ikeda D.D."/>
            <person name="Fukushima T."/>
            <person name="Takenoshita S."/>
            <person name="Kochi H."/>
        </authorList>
    </citation>
    <scope>INTERACTION WITH UHRF2</scope>
</reference>
<reference key="138">
    <citation type="journal article" date="2011" name="Cell Death Differ.">
        <title>E3 ubiquitin ligase Hades negatively regulates the exonuclear function of p53.</title>
        <authorList>
            <person name="Jung J.H."/>
            <person name="Bae S."/>
            <person name="Lee J.Y."/>
            <person name="Woo S.R."/>
            <person name="Cha H.J."/>
            <person name="Yoon Y."/>
            <person name="Suh K.S."/>
            <person name="Lee S.J."/>
            <person name="Park I.C."/>
            <person name="Jin Y.W."/>
            <person name="Lee K.H."/>
            <person name="An S."/>
            <person name="Lee J.H."/>
        </authorList>
    </citation>
    <scope>INTERACTION WITH MUL1</scope>
    <scope>SUBCELLULAR LOCATION</scope>
    <scope>UBIQUITINATION AT LYS-24 BY MUL1</scope>
    <scope>MUTAGENESIS OF LYS-24</scope>
</reference>
<reference key="139">
    <citation type="journal article" date="2011" name="J. Biol. Chem.">
        <title>Aurora B interacts with NIR-p53, leading to p53 phosphorylation in its DNA-binding domain and subsequent functional suppression.</title>
        <authorList>
            <person name="Wu L."/>
            <person name="Ma C.A."/>
            <person name="Zhao Y."/>
            <person name="Jain A."/>
        </authorList>
    </citation>
    <scope>FUNCTION</scope>
    <scope>INTERACTION WITH AURKB AND NOC2L</scope>
    <scope>PHOSPHORYLATION AT SER-183; SER-269 AND THR-284</scope>
    <scope>CHARACTERIZATION OF VARIANT ALA-284</scope>
    <scope>MUTAGENESIS OF SER-183; SER-269 AND THR-284</scope>
    <scope>IDENTIFICATION BY MASS SPECTROMETRY</scope>
</reference>
<reference key="140">
    <citation type="journal article" date="2020" name="Nat. Cancer">
        <title>Aldolase B suppresses hepatocellular carcinogenesis by inhibiting G6PD and pentose phosphate pathways.</title>
        <authorList>
            <person name="Li M."/>
            <person name="He X."/>
            <person name="Guo W."/>
            <person name="Yu H."/>
            <person name="Zhang S."/>
            <person name="Wang N."/>
            <person name="Liu G."/>
            <person name="Sa R."/>
            <person name="Shen X."/>
            <person name="Jiang Y."/>
            <person name="Tang Y."/>
            <person name="Zhuo Y."/>
            <person name="Yin C."/>
            <person name="Tu Q."/>
            <person name="Li N."/>
            <person name="Nie X."/>
            <person name="Li Y."/>
            <person name="Hu Z."/>
            <person name="Zhu H."/>
            <person name="Ding J."/>
            <person name="Li Z."/>
            <person name="Liu T."/>
            <person name="Zhang F."/>
            <person name="Zhou H."/>
            <person name="Li S."/>
            <person name="Yue J."/>
            <person name="Yan Z."/>
            <person name="Cheng S."/>
            <person name="Tao Y."/>
            <person name="Yin H."/>
        </authorList>
    </citation>
    <scope>INTERACTION WITH ALDOB AND G6PD</scope>
</reference>
<reference key="141">
    <citation type="journal article" date="2011" name="Nat. Genet.">
        <title>A germline variant in the TP53 polyadenylation signal confers cancer susceptibility.</title>
        <authorList>
            <person name="Stacey S.N."/>
            <person name="Sulem P."/>
            <person name="Jonasdottir A."/>
            <person name="Masson G."/>
            <person name="Gudmundsson J."/>
            <person name="Gudbjartsson D.F."/>
            <person name="Magnusson O.T."/>
            <person name="Gudjonsson S.A."/>
            <person name="Sigurgeirsson B."/>
            <person name="Thorisdottir K."/>
            <person name="Ragnarsson R."/>
            <person name="Benediktsdottir K.R."/>
            <person name="Nexo B.A."/>
            <person name="Tjonneland A."/>
            <person name="Overvad K."/>
            <person name="Rudnai P."/>
            <person name="Gurzau E."/>
            <person name="Koppova K."/>
            <person name="Hemminki K."/>
            <person name="Corredera C."/>
            <person name="Fuentelsaz V."/>
            <person name="Grasa P."/>
            <person name="Navarrete S."/>
            <person name="Fuertes F."/>
            <person name="Garcia-Prats M.D."/>
            <person name="Sanambrosio E."/>
            <person name="Panadero A."/>
            <person name="De Juan A."/>
            <person name="Garcia A."/>
            <person name="Rivera F."/>
            <person name="Planelles D."/>
            <person name="Soriano V."/>
            <person name="Requena C."/>
            <person name="Aben K.K."/>
            <person name="van Rossum M.M."/>
            <person name="Cremers R.G."/>
            <person name="van Oort I.M."/>
            <person name="van Spronsen D.J."/>
            <person name="Schalken J.A."/>
            <person name="Peters W.H."/>
            <person name="Helfand B.T."/>
            <person name="Donovan J.L."/>
            <person name="Hamdy F.C."/>
            <person name="Badescu D."/>
            <person name="Codreanu O."/>
            <person name="Jinga M."/>
            <person name="Csiki I.E."/>
            <person name="Constantinescu V."/>
            <person name="Badea P."/>
            <person name="Mates I.N."/>
            <person name="Dinu D.E."/>
            <person name="Constantin A."/>
            <person name="Mates D."/>
            <person name="Kristjansdottir S."/>
            <person name="Agnarsson B.A."/>
            <person name="Jonsson E."/>
            <person name="Barkardottir R.B."/>
            <person name="Einarsson G.V."/>
            <person name="Sigurdsson F."/>
            <person name="Moller P.H."/>
            <person name="Stefansson T."/>
            <person name="Valdimarsson T."/>
            <person name="Johannsson O.T."/>
            <person name="Sigurdsson H."/>
            <person name="Jonsson T."/>
            <person name="Jonasson J.G."/>
            <person name="Tryggvadottir L."/>
            <person name="Rice T."/>
            <person name="Hansen H.M."/>
            <person name="Xiao Y."/>
            <person name="Lachance D.H."/>
            <person name="O'Neill B.P."/>
            <person name="Kosel M.L."/>
            <person name="Decker P.A."/>
            <person name="Thorleifsson G."/>
            <person name="Johannsdottir H."/>
            <person name="Helgadottir H.T."/>
            <person name="Sigurdsson A."/>
            <person name="Steinthorsdottir V."/>
            <person name="Lindblom A."/>
            <person name="Sandler R.S."/>
            <person name="Keku T.O."/>
            <person name="Banasik K."/>
            <person name="Jorgensen T."/>
            <person name="Witte D.R."/>
            <person name="Hansen T."/>
            <person name="Pedersen O."/>
            <person name="Jinga V."/>
            <person name="Neal D.E."/>
            <person name="Catalona W.J."/>
            <person name="Wrensch M."/>
            <person name="Wiencke J."/>
            <person name="Jenkins R.B."/>
            <person name="Nagore E."/>
            <person name="Vogel U."/>
            <person name="Kiemeney L.A."/>
            <person name="Kumar R."/>
            <person name="Mayordomo J.I."/>
            <person name="Olafsson J.H."/>
            <person name="Kong A."/>
            <person name="Thorsteinsdottir U."/>
            <person name="Rafnar T."/>
            <person name="Stefansson K."/>
        </authorList>
    </citation>
    <scope>INVOLVEMENT IN BCC7</scope>
</reference>
<reference key="142">
    <citation type="journal article" date="2011" name="Oncogene">
        <title>A new role of NUAK1: directly phosphorylating p53 and regulating cell proliferation.</title>
        <authorList>
            <person name="Hou X."/>
            <person name="Liu J.E."/>
            <person name="Liu W."/>
            <person name="Liu C.Y."/>
            <person name="Liu Z.Y."/>
            <person name="Sun Z.Y."/>
        </authorList>
    </citation>
    <scope>INTERACTION WITH NUAK1</scope>
    <scope>PHOSPHORYLATION AT SER-15 AND SER-392</scope>
</reference>
<reference key="143">
    <citation type="journal article" date="2012" name="Cell">
        <title>p53 opens the mitochondrial permeability transition pore to trigger necrosis.</title>
        <authorList>
            <person name="Vaseva A.V."/>
            <person name="Marchenko N.D."/>
            <person name="Ji K."/>
            <person name="Tsirka S.E."/>
            <person name="Holzmann S."/>
            <person name="Moll U.M."/>
        </authorList>
    </citation>
    <scope>FUNCTION</scope>
    <scope>SUBCELLULAR LOCATION</scope>
    <scope>INTERACTION WITH PPIF</scope>
</reference>
<reference key="144">
    <citation type="journal article" date="2012" name="Cell Cycle">
        <title>The RAX/PACT-PKR stress response pathway promotes p53 sumoylation and activation, leading to G(1) arrest.</title>
        <authorList>
            <person name="Bennett R.L."/>
            <person name="Pan Y."/>
            <person name="Christian J."/>
            <person name="Hui T."/>
            <person name="May W.S. Jr."/>
        </authorList>
    </citation>
    <scope>INTERACTION WITH UBC9</scope>
    <scope>PHOSPHORYLATION AT SER-392</scope>
    <scope>SUMOYLATION AT LYS-386</scope>
</reference>
<reference key="145">
    <citation type="journal article" date="2012" name="Cell Death Differ.">
        <title>Nucleolar protein GLTSCR2 stabilizes p53 in response to ribosomal stresses.</title>
        <authorList>
            <person name="Lee S."/>
            <person name="Kim J.Y."/>
            <person name="Kim Y.J."/>
            <person name="Seok K.O."/>
            <person name="Kim J.H."/>
            <person name="Chang Y.J."/>
            <person name="Kang H.Y."/>
            <person name="Park J.H."/>
        </authorList>
    </citation>
    <scope>INTERACTION WITH NOP53</scope>
</reference>
<reference key="146">
    <citation type="journal article" date="2012" name="Eur. J. Immunol.">
        <title>ZNF385B is characteristically expressed in germinal center B cells and involved in B-cell apoptosis.</title>
        <authorList>
            <person name="Iijima K."/>
            <person name="Yamada H."/>
            <person name="Miharu M."/>
            <person name="Imadome K."/>
            <person name="Miyagawa Y."/>
            <person name="Akimoto S."/>
            <person name="Kobayashi K."/>
            <person name="Okita H."/>
            <person name="Nakazawa A."/>
            <person name="Fujiwara S."/>
            <person name="Fujimoto J."/>
            <person name="Kiyokawa N."/>
        </authorList>
    </citation>
    <scope>INTERACTION WITH ZNF385B</scope>
</reference>
<reference key="147">
    <citation type="journal article" date="2012" name="Nat. Struct. Mol. Biol.">
        <title>PHF20 is an effector protein of p53 double lysine methylation that stabilizes and activates p53.</title>
        <authorList>
            <person name="Cui G."/>
            <person name="Park S."/>
            <person name="Badeaux A.I."/>
            <person name="Kim D."/>
            <person name="Lee J."/>
            <person name="Thompson J.R."/>
            <person name="Yan F."/>
            <person name="Kaneko S."/>
            <person name="Yuan Z."/>
            <person name="Botuyan M.V."/>
            <person name="Bedford M.T."/>
            <person name="Cheng J.Q."/>
            <person name="Mer G."/>
        </authorList>
    </citation>
    <scope>METHYLATION AT LYS-370 AND LYS-382</scope>
</reference>
<reference key="148">
    <citation type="journal article" date="2013" name="Nat. Commun.">
        <title>p53 regulates Period2 expression and the circadian clock.</title>
        <authorList>
            <person name="Miki T."/>
            <person name="Matsumoto T."/>
            <person name="Zhao Z."/>
            <person name="Lee C.C."/>
        </authorList>
    </citation>
    <scope>FUNCTION</scope>
</reference>
<reference key="149">
    <citation type="journal article" date="2013" name="Proc. Natl. Acad. Sci. U.S.A.">
        <title>MOZ increases p53 acetylation and premature senescence through its complex formation with PML.</title>
        <authorList>
            <person name="Rokudai S."/>
            <person name="Laptenko O."/>
            <person name="Arnal S.M."/>
            <person name="Taya Y."/>
            <person name="Kitabayashi I."/>
            <person name="Prives C."/>
        </authorList>
    </citation>
    <scope>ACETYLATION AT LYS-120 AND LYS-382</scope>
</reference>
<reference key="150">
    <citation type="journal article" date="2014" name="Cell Death Dis.">
        <title>Ubiquitin-like (UBX)-domain-containing protein, UBXN2A, promotes cell death by interfering with the p53-Mortalin interactions in colon cancer cells.</title>
        <authorList>
            <person name="Sane S."/>
            <person name="Abdullah A."/>
            <person name="Boudreau D.A."/>
            <person name="Autenried R.K."/>
            <person name="Gupta B.K."/>
            <person name="Wang X."/>
            <person name="Wang H."/>
            <person name="Schlenker E.H."/>
            <person name="Zhang D."/>
            <person name="Telleria C."/>
            <person name="Huang L."/>
            <person name="Chauhan S.C."/>
            <person name="Rezvani K."/>
        </authorList>
    </citation>
    <scope>INTERACTION WITH HSPA9</scope>
    <scope>SUBCELLULAR LOCATION</scope>
</reference>
<reference key="151">
    <citation type="journal article" date="2013" name="Oncogene">
        <title>S100A4 interacts with p53 in the nucleus and promotes p53 degradation.</title>
        <authorList>
            <person name="Orre L.M."/>
            <person name="Panizza E."/>
            <person name="Kaminskyy V.O."/>
            <person name="Vernet E."/>
            <person name="Graeslund T."/>
            <person name="Zhivotovsky B."/>
            <person name="Lehtioe J."/>
        </authorList>
    </citation>
    <scope>INTERACTION WITH S100A4</scope>
    <scope>SUBCELLULAR LOCATION</scope>
</reference>
<reference key="152">
    <citation type="journal article" date="2014" name="J. Natl. Cancer Inst.">
        <title>DRAGO (KIAA0247), a new DNA damage-responsive, p53-inducible gene that cooperates with p53 as oncosuppressor. [Corrected].</title>
        <authorList>
            <person name="Polato F."/>
            <person name="Rusconi P."/>
            <person name="Zangrossi S."/>
            <person name="Morelli F."/>
            <person name="Boeri M."/>
            <person name="Musi A."/>
            <person name="Marchini S."/>
            <person name="Castiglioni V."/>
            <person name="Scanziani E."/>
            <person name="Torri V."/>
            <person name="Broggini M."/>
        </authorList>
    </citation>
    <scope>FUNCTION</scope>
</reference>
<reference key="153">
    <citation type="journal article" date="2014" name="Proc. Natl. Acad. Sci. U.S.A.">
        <title>Disruption of FAT10-MAD2 binding inhibits tumor progression.</title>
        <authorList>
            <person name="Theng S.S."/>
            <person name="Wang W."/>
            <person name="Mah W.C."/>
            <person name="Chan C."/>
            <person name="Zhuo J."/>
            <person name="Gao Y."/>
            <person name="Qin H."/>
            <person name="Lim L."/>
            <person name="Chong S.S."/>
            <person name="Song J."/>
            <person name="Lee C.G."/>
        </authorList>
    </citation>
    <scope>INTERACTION WITH UBD</scope>
</reference>
<reference key="154">
    <citation type="journal article" date="2015" name="Cell Death Differ.">
        <title>Cofactor Strap regulates oxidative phosphorylation and mitochondrial p53 activity through ATP synthase.</title>
        <authorList>
            <person name="Maniam S."/>
            <person name="Coutts A.S."/>
            <person name="Stratford M.R."/>
            <person name="McGouran J."/>
            <person name="Kessler B."/>
            <person name="La Thangue N.B."/>
        </authorList>
    </citation>
    <scope>INTERACTION WITH TTC5</scope>
    <scope>SUBCELLULAR LOCATION</scope>
</reference>
<reference key="155">
    <citation type="journal article" date="2016" name="Cell Stress Chaperones">
        <title>Structural studies of UBXN2A and mortalin interaction and the putative role of silenced UBXN2A in preventing response to chemotherapy.</title>
        <authorList>
            <person name="Sane S."/>
            <person name="Abdullah A."/>
            <person name="Nelson M.E."/>
            <person name="Wang H."/>
            <person name="Chauhan S.C."/>
            <person name="Newton S.S."/>
            <person name="Rezvani K."/>
        </authorList>
    </citation>
    <scope>SUBCELLULAR LOCATION</scope>
</reference>
<reference key="156">
    <citation type="journal article" date="2015" name="Cell. Physiol. Biochem.">
        <title>RNF125 is a ubiquitin-protein ligase that promotes p53 degradation.</title>
        <authorList>
            <person name="Yang L."/>
            <person name="Zhou B."/>
            <person name="Li X."/>
            <person name="Lu Z."/>
            <person name="Li W."/>
            <person name="Huo X."/>
            <person name="Miao Z."/>
        </authorList>
    </citation>
    <scope>UBIQUITINATION</scope>
</reference>
<reference key="157">
    <citation type="journal article" date="2016" name="Oncogene">
        <title>PML isoforms IV and V contribute to adenovirus-mediated oncogenic transformation by functionally inhibiting the tumor-suppressor p53.</title>
        <authorList>
            <person name="Wimmer P."/>
            <person name="Berscheminski J."/>
            <person name="Blanchette P."/>
            <person name="Groitl P."/>
            <person name="Branton P.E."/>
            <person name="Hay R.T."/>
            <person name="Dobner T."/>
            <person name="Schreiner S."/>
        </authorList>
    </citation>
    <scope>INTERACTION WITH HADV5 E1B-55K (MICROBIAL INFECTION)</scope>
</reference>
<reference key="158">
    <citation type="journal article" date="2016" name="Nat. Commun.">
        <title>SCF(Fbxo22)-KDM4A targets methylated p53 for degradation and regulates senescence.</title>
        <authorList>
            <person name="Johmura Y."/>
            <person name="Sun J."/>
            <person name="Kitagawa K."/>
            <person name="Nakanishi K."/>
            <person name="Kuno T."/>
            <person name="Naiki-Ito A."/>
            <person name="Sawada Y."/>
            <person name="Miyamoto T."/>
            <person name="Okabe A."/>
            <person name="Aburatani H."/>
            <person name="Li S."/>
            <person name="Miyoshi I."/>
            <person name="Takahashi S."/>
            <person name="Kitagawa M."/>
            <person name="Nakanishi M."/>
        </authorList>
    </citation>
    <scope>INTERACTION WITH FBXO22</scope>
    <scope>UBIQUITINATION</scope>
</reference>
<reference key="159">
    <citation type="journal article" date="2016" name="Oncotarget">
        <title>LACE1 interacts with p53 and mediates its mitochondrial translocation and apoptosis.</title>
        <authorList>
            <person name="Cesnekova J."/>
            <person name="Spacilova J."/>
            <person name="Hansikova H."/>
            <person name="Houstek J."/>
            <person name="Zeman J."/>
            <person name="Stiburek L."/>
        </authorList>
    </citation>
    <scope>INTERACTION WITH AFG1L</scope>
    <scope>SUBCELLULAR LOCATION</scope>
</reference>
<reference key="160">
    <citation type="journal article" date="2017" name="Sci. Rep.">
        <title>DDX3 localizes to the centrosome and prevents multipolar mitosis by epigenetically and translationally modulating p53 expression.</title>
        <authorList>
            <person name="Chen W.J."/>
            <person name="Wang W.T."/>
            <person name="Tsai T.Y."/>
            <person name="Li H.K."/>
            <person name="Lee Y.W."/>
        </authorList>
    </citation>
    <scope>INTERACTION WITH DDX3X AND GAMMA-TUBULIN</scope>
    <scope>SUBCELLULAR LOCATION</scope>
    <scope>PHOSPHORYLATION AT SER-15</scope>
</reference>
<reference key="161">
    <citation type="journal article" date="2017" name="Biochem. Biophys. Res. Commun.">
        <title>USP3 stabilizes p53 protein through its deubiquitinase activity.</title>
        <authorList>
            <person name="Fu S."/>
            <person name="Shao S."/>
            <person name="Wang L."/>
            <person name="Liu H."/>
            <person name="Hou H."/>
            <person name="Wang Y."/>
            <person name="Wang H."/>
            <person name="Huang X."/>
            <person name="Lv R."/>
        </authorList>
    </citation>
    <scope>DEUBIQUITINATION BY USP3</scope>
</reference>
<reference key="162">
    <citation type="journal article" date="2021" name="Nucleic Acids Res.">
        <title>DAZAP2 acts as specifier of the p53 response to DNA damage.</title>
        <authorList>
            <person name="Liebl M.C."/>
            <person name="Moehlenbrink J."/>
            <person name="Becker H."/>
            <person name="Raddatz G."/>
            <person name="Abdeen S.K."/>
            <person name="Aqeilan R.I."/>
            <person name="Lyko F."/>
            <person name="Hofmann T.G."/>
        </authorList>
    </citation>
    <scope>INTERACTION WITH DAZAP2</scope>
</reference>
<reference key="163">
    <citation type="journal article" date="2018" name="Am. J. Hum. Genet.">
        <title>De novo mutations activating germline TP53 in an inherited bone-marrow-failure syndrome.</title>
        <authorList>
            <person name="Toki T."/>
            <person name="Yoshida K."/>
            <person name="Wang R."/>
            <person name="Nakamura S."/>
            <person name="Maekawa T."/>
            <person name="Goi K."/>
            <person name="Katoh M.C."/>
            <person name="Mizuno S."/>
            <person name="Sugiyama F."/>
            <person name="Kanezaki R."/>
            <person name="Uechi T."/>
            <person name="Nakajima Y."/>
            <person name="Sato Y."/>
            <person name="Okuno Y."/>
            <person name="Sato-Otsubo A."/>
            <person name="Shiozawa Y."/>
            <person name="Kataoka K."/>
            <person name="Shiraishi Y."/>
            <person name="Sanada M."/>
            <person name="Chiba K."/>
            <person name="Tanaka H."/>
            <person name="Terui K."/>
            <person name="Sato T."/>
            <person name="Kamio T."/>
            <person name="Sakaguchi H."/>
            <person name="Ohga S."/>
            <person name="Kuramitsu M."/>
            <person name="Hamaguchi I."/>
            <person name="Ohara A."/>
            <person name="Kanno H."/>
            <person name="Miyano S."/>
            <person name="Kojima S."/>
            <person name="Ishiguro A."/>
            <person name="Sugita K."/>
            <person name="Kenmochi N."/>
            <person name="Takahashi S."/>
            <person name="Eto K."/>
            <person name="Ogawa S."/>
            <person name="Ito E."/>
        </authorList>
    </citation>
    <scope>INVOLVEMENT IN BMFS5</scope>
</reference>
<reference key="164">
    <citation type="journal article" date="2018" name="Cell Chem. Biol.">
        <title>A Designed Peptide Targets Two Types of Modifications of p53 with Anti-cancer Activity.</title>
        <authorList>
            <person name="Liang L."/>
            <person name="Wang H."/>
            <person name="Shi H."/>
            <person name="Li Z."/>
            <person name="Yao H."/>
            <person name="Bu Z."/>
            <person name="Song N."/>
            <person name="Li C."/>
            <person name="Xiang D."/>
            <person name="Zhang Y."/>
            <person name="Wang J."/>
            <person name="Hu Y."/>
            <person name="Xu Q."/>
            <person name="Ma Y."/>
            <person name="Cheng Z."/>
            <person name="Wang Y."/>
            <person name="Zhao S."/>
            <person name="Qian J."/>
            <person name="Chen Y."/>
            <person name="Fang J.Y."/>
            <person name="Xu J."/>
        </authorList>
    </citation>
    <scope>INTERACTION WITH MORN3</scope>
    <scope>DEACETYLATION AT LYS-382</scope>
    <scope>UBQIQUITINATION</scope>
</reference>
<reference key="165">
    <citation type="journal article" date="2018" name="Elife">
        <title>Haploinsufficiency of Trp53 dramatically extends the lifespan of Sirt6-deficient mice.</title>
        <authorList>
            <person name="Ghosh S."/>
            <person name="Wong S.K."/>
            <person name="Jiang Z."/>
            <person name="Liu B."/>
            <person name="Wang Y."/>
            <person name="Hao Q."/>
            <person name="Gorbunova V."/>
            <person name="Liu X."/>
            <person name="Zhou Z."/>
        </authorList>
    </citation>
    <scope>ACETYLATION AT LYS-381</scope>
    <scope>DEACETYLATION BY SIRT6</scope>
    <scope>MUTAGENESIS OF LYS-381</scope>
</reference>
<reference key="166">
    <citation type="journal article" date="2019" name="Sci. Rep.">
        <title>VRK1 functional insufficiency due to alterations in protein stability or kinase activity of human VRK1 pathogenic variants implicated in neuromotor syndromes.</title>
        <authorList>
            <person name="Martin-Doncel E."/>
            <person name="Rojas A.M."/>
            <person name="Cantarero L."/>
            <person name="Lazo P.A."/>
        </authorList>
    </citation>
    <scope>PHOSPHORYLATION AT THR-18 BY VRK1</scope>
</reference>
<reference key="167">
    <citation type="journal article" date="2020" name="Sci. Rep.">
        <title>Liquid-like droplet formation by tumor suppressor p53 induced by multivalent electrostatic interactions between two disordered domains.</title>
        <authorList>
            <person name="Kamagata K."/>
            <person name="Kanbayashi S."/>
            <person name="Honda M."/>
            <person name="Itoh Y."/>
            <person name="Takahashi H."/>
            <person name="Kameda T."/>
            <person name="Nagatsugi F."/>
            <person name="Takahashi S."/>
        </authorList>
    </citation>
    <scope>DOMAIN</scope>
    <scope>MUTAGENESIS OF SER-392</scope>
</reference>
<reference key="168">
    <citation type="journal article" date="2021" name="J. Virol.">
        <title>The ORF45 protein of Kaposi Sarcoma-associated Herpesvirus (KSHV) is an inhibitor of p53 signaling during viral reactivation.</title>
        <authorList>
            <person name="Alzhanova D."/>
            <person name="Meyo J.O."/>
            <person name="Juarez A."/>
            <person name="Dittmer D.P."/>
        </authorList>
    </citation>
    <scope>INTERACTION WITH KAPOSI'S SARCOMA-ASSOCIATED HERPESVIRUS/HHV-8 PROTEIN ORF45 (MICROBIAL INFECTION)</scope>
</reference>
<reference key="169">
    <citation type="journal article" date="2021" name="Nat. Commun.">
        <title>ZNF768 links oncogenic RAS to cellular senescence.</title>
        <authorList>
            <person name="Villot R."/>
            <person name="Poirier A."/>
            <person name="Bakan I."/>
            <person name="Boulay K."/>
            <person name="Fernandez E."/>
            <person name="Devillers R."/>
            <person name="Gama-Braga L."/>
            <person name="Tribouillard L."/>
            <person name="Gagne A."/>
            <person name="Duchesne E."/>
            <person name="Caron D."/>
            <person name="Berube J.S."/>
            <person name="Berube J.C."/>
            <person name="Coulombe Y."/>
            <person name="Orain M."/>
            <person name="Gelinas Y."/>
            <person name="Gobeil S."/>
            <person name="Bosse Y."/>
            <person name="Masson J.Y."/>
            <person name="Elowe S."/>
            <person name="Bilodeau S."/>
            <person name="Manem V."/>
            <person name="Joubert P."/>
            <person name="Mallette F.A."/>
            <person name="Laplante M."/>
        </authorList>
    </citation>
    <scope>INTERACTION WITH ZNF768</scope>
</reference>
<reference key="170">
    <citation type="journal article" date="2022" name="Biochim. Biophys. Acta">
        <title>Ser392 phosphorylation modulated a switch between p53 and transcriptional condensates.</title>
        <authorList>
            <person name="Dai Z."/>
            <person name="Li G."/>
            <person name="Chen Q."/>
            <person name="Yang X."/>
        </authorList>
    </citation>
    <scope>FUNCTION</scope>
    <scope>DOMAIN</scope>
    <scope>PHOSPHORYLATION AT SER-392</scope>
    <scope>MUTAGENESIS OF SER-392</scope>
</reference>
<reference key="171">
    <citation type="journal article" date="2022" name="Int. J. Biol. Macromol.">
        <title>Phase separation of p53 induced by its unstructured basic region and prevented by oncogenic mutations in tetramerization domain.</title>
        <authorList>
            <person name="Chen C."/>
            <person name="Fu G."/>
            <person name="Guo Q."/>
            <person name="Xue S."/>
            <person name="Luo S.Z."/>
        </authorList>
    </citation>
    <scope>DOMAIN</scope>
    <scope>SUBCELLULAR LOCATION</scope>
    <scope>CHARACTERIZATION OF VARIANTS LFS CYS-337; HIS-337 AND PRO-344</scope>
    <scope>CHARACTERIZATION OF VARIANT PRO-337</scope>
</reference>
<reference key="172">
    <citation type="journal article" date="2023" name="Int. J. Biol. Macromol.">
        <title>Phosphorylation and specific DNA improved the incorporation ability of p53 into functional condensates.</title>
        <authorList>
            <person name="Chen Q."/>
            <person name="Wu Y."/>
            <person name="Dai Z."/>
            <person name="Zhang Z."/>
            <person name="Yang X."/>
        </authorList>
    </citation>
    <scope>FUNCTION</scope>
    <scope>DOMAIN</scope>
</reference>
<reference key="173">
    <citation type="journal article" date="2024" name="Cell">
        <title>Alanyl-tRNA synthetase, AARS1, is a lactate sensor and lactyltransferase that lactylates p53 and contributes to tumorigenesis.</title>
        <authorList>
            <person name="Zong Z."/>
            <person name="Xie F."/>
            <person name="Wang S."/>
            <person name="Wu X."/>
            <person name="Zhang Z."/>
            <person name="Yang B."/>
            <person name="Zhou F."/>
        </authorList>
    </citation>
    <scope>FUNCTION</scope>
    <scope>DOMAIN</scope>
    <scope>LACTYLATION AT LYS-120 AND LYS-139</scope>
    <scope>CHARACTERIZATION OF VARIANTS GLU-120; GLN-120; ASN-139; THR-139; GLN-139 AND GLU-139</scope>
</reference>
<reference key="174">
    <citation type="journal article" date="1994" name="Science">
        <title>High-resolution structure of the oligomerization domain of p53 by multidimensional NMR.</title>
        <authorList>
            <person name="Clore G.M."/>
            <person name="Omichinski J.G."/>
            <person name="Sakaguchi K."/>
            <person name="Zambrano N."/>
            <person name="Sakamoto H."/>
            <person name="Appella E."/>
            <person name="Gronenborn A.M."/>
        </authorList>
    </citation>
    <scope>STRUCTURE BY NMR OF 319-360</scope>
</reference>
<reference key="175">
    <citation type="journal article" date="1994" name="Nat. Struct. Biol.">
        <title>Solution structure of the tetrameric minimum transforming domain of p53.</title>
        <authorList>
            <person name="Lee W."/>
            <person name="Harvey T.S."/>
            <person name="Yin Y."/>
            <person name="Yau P."/>
            <person name="Litchfield D."/>
            <person name="Arrowsmith C.H."/>
        </authorList>
    </citation>
    <scope>STRUCTURE BY NMR OF 325-355</scope>
</reference>
<reference key="176">
    <citation type="journal article" date="1997" name="EMBO J.">
        <title>Hydrophobic side-chain size is a determinant of the three-dimensional structure of the p53 oligomerization domain.</title>
        <authorList>
            <person name="McCoy M."/>
            <person name="Stavridi E.S."/>
            <person name="Waterman J.L."/>
            <person name="Wieczorek A.M."/>
            <person name="Opella S.J."/>
            <person name="Halazonetis T.D."/>
        </authorList>
    </citation>
    <scope>STRUCTURE BY NMR OF 326-354</scope>
</reference>
<reference key="177">
    <citation type="journal article" date="1994" name="Science">
        <title>Crystal structure of a p53 tumor suppressor-DNA complex: understanding tumorigenic mutations.</title>
        <authorList>
            <person name="Cho Y."/>
            <person name="Gorina S."/>
            <person name="Jeffrey P.D."/>
            <person name="Pavletich N.P."/>
        </authorList>
    </citation>
    <scope>X-RAY CRYSTALLOGRAPHY (2.2 ANGSTROMS) OF 94-289</scope>
</reference>
<reference key="178">
    <citation type="journal article" date="1995" name="Science">
        <title>Crystal structure of the tetramerization domain of the p53 tumor suppressor at 1.7 angstroms.</title>
        <authorList>
            <person name="Jeffrey P.D."/>
            <person name="Gorina S."/>
            <person name="Pavletich N.P."/>
        </authorList>
    </citation>
    <scope>X-RAY CRYSTALLOGRAPHY (1.7 ANGSTROMS) OF 325-356</scope>
</reference>
<reference key="179">
    <citation type="journal article" date="1996" name="Science">
        <title>Structure of the MDM2 oncoprotein bound to the p53 tumor suppressor transactivation domain.</title>
        <authorList>
            <person name="Kussie P.H."/>
            <person name="Gorina S."/>
            <person name="Marechal V."/>
            <person name="Elenbaas B."/>
            <person name="Moreau J."/>
            <person name="Levine A.J."/>
            <person name="Pavletich N.P."/>
        </authorList>
    </citation>
    <scope>X-RAY CRYSTALLOGRAPHY (2.3 ANGSTROMS) OF 13-29 IN COMPLEX WITH MDM2</scope>
</reference>
<reference key="180">
    <citation type="journal article" date="1996" name="Science">
        <title>Structure of the p53 tumor suppressor bound to the ankyrin and SH3 domains of 53BP2.</title>
        <authorList>
            <person name="Gorina S."/>
            <person name="Pavletich N.P."/>
        </authorList>
    </citation>
    <scope>X-RAY CRYSTALLOGRAPHY (2.2 ANGSTROMS) OF 97-287 IN COMPLEX WITH 53BP2</scope>
</reference>
<reference key="181">
    <citation type="journal article" date="2004" name="J. Biol. Chem.">
        <title>Crystal structure of a superstable mutant of human p53 core domain. Insights into the mechanism of rescuing oncogenic mutations.</title>
        <authorList>
            <person name="Joerger A.C."/>
            <person name="Allen M.D."/>
            <person name="Fersht A.R."/>
        </authorList>
    </citation>
    <scope>X-RAY CRYSTALLOGRAPHY (1.9 ANGSTROMS) OF 94-312 IN COMPLEX WITH ZINC IONS</scope>
    <scope>SUBUNIT</scope>
</reference>
<reference key="182">
    <citation type="journal article" date="2006" name="Mol. Cell">
        <title>Structural basis of DNA recognition by p53 tetramers.</title>
        <authorList>
            <person name="Kitayner M."/>
            <person name="Rozenberg H."/>
            <person name="Kessler N."/>
            <person name="Rabinovich D."/>
            <person name="Shaulov L."/>
            <person name="Haran T.E."/>
            <person name="Shakked Z."/>
        </authorList>
    </citation>
    <scope>X-RAY CRYSTALLOGRAPHY (1.8 ANGSTROMS) OF 94-293 IN COMPLEX WITH DNA AND ZINC IONS</scope>
    <scope>SUBUNIT</scope>
</reference>
<reference key="183">
    <citation type="journal article" date="2006" name="Nat. Struct. Mol. Biol.">
        <title>Molecular recognition of p53 and MDM2 by USP7/HAUSP.</title>
        <authorList>
            <person name="Sheng Y."/>
            <person name="Saridakis V."/>
            <person name="Sarkari F."/>
            <person name="Duan S."/>
            <person name="Wu T."/>
            <person name="Arrowsmith C.H."/>
            <person name="Frappier L."/>
        </authorList>
    </citation>
    <scope>X-RAY CRYSTALLOGRAPHY (1.6 ANGSTROMS) OF 358-367 IN COMPLEX WITH USP7</scope>
    <scope>INTERACTION WITH USP7</scope>
</reference>
<reference key="184">
    <citation type="journal article" date="2006" name="PLoS Biol.">
        <title>Structural basis of competitive recognition of p53 and MDM2 by HAUSP/USP7: implications for the regulation of the p53-MDM2 pathway.</title>
        <authorList>
            <person name="Hu M."/>
            <person name="Gu L."/>
            <person name="Li M."/>
            <person name="Jeffrey P.D."/>
            <person name="Gu W."/>
            <person name="Shi Y."/>
        </authorList>
    </citation>
    <scope>X-RAY CRYSTALLOGRAPHY (1.65 ANGSTROMS) OF 360-368 IN COMPLEX WITH USP7</scope>
    <scope>MUTAGENESIS OF PRO-359; GLY-361 AND SER-362</scope>
    <scope>INTERACTION WITH USP7</scope>
</reference>
<reference key="185">
    <citation type="journal article" date="2010" name="J. Biol. Chem.">
        <title>The MBT repeats of L3MBTL1 link SET8-mediated p53 methylation at lysine 382 to target gene repression.</title>
        <authorList>
            <person name="West L.E."/>
            <person name="Roy S."/>
            <person name="Lachmi-Weiner K."/>
            <person name="Hayashi R."/>
            <person name="Shi X."/>
            <person name="Appella E."/>
            <person name="Kutateladze T.G."/>
            <person name="Gozani O."/>
        </authorList>
    </citation>
    <scope>X-RAY CRYSTALLOGRAPHY (2.50 ANGSTROMS) OF 377-386</scope>
    <scope>METHYLATION AT LYS-382</scope>
    <scope>MUTAGENESIS OF LYS-382</scope>
    <scope>INTERACTION WITH L3MBTL1</scope>
</reference>
<reference key="186">
    <citation type="journal article" date="1993" name="Science">
        <title>p53: at the crossroads of molecular carcinogenesis and risk assessment.</title>
        <authorList>
            <person name="Harris C.C."/>
        </authorList>
    </citation>
    <scope>REVIEW</scope>
</reference>
<reference key="187">
    <citation type="journal article" date="1991" name="Science">
        <title>p53 mutations in human cancers.</title>
        <authorList>
            <person name="Hoolstein M."/>
            <person name="Sidransky D."/>
            <person name="Vogelstein B."/>
            <person name="Harris C.C."/>
        </authorList>
    </citation>
    <scope>REVIEW ON VARIANTS</scope>
</reference>
<reference key="188">
    <citation type="journal article" date="1996" name="Hum. Mutat.">
        <title>Database of mutations in the p53 and APC tumor suppressor genes designed to facilitate molecular epidemiological analyses.</title>
        <authorList>
            <person name="de Vries E.M.G."/>
            <person name="Ricke D.O."/>
            <person name="de Vries T.N."/>
            <person name="Hartmann A."/>
            <person name="Blaszyk H."/>
            <person name="Liao D."/>
            <person name="Soussi T."/>
            <person name="Kovach J.S."/>
            <person name="Sommer S.S."/>
        </authorList>
    </citation>
    <scope>REVIEW ON VARIANTS</scope>
</reference>
<reference key="189">
    <citation type="journal article" date="2006" name="Proc. Natl. Acad. Sci. U.S.A.">
        <title>Structural basis for understanding oncogenic p53 mutations and designing rescue drugs.</title>
        <authorList>
            <person name="Joerger A.C."/>
            <person name="Ang H.C."/>
            <person name="Fersht A.R."/>
        </authorList>
    </citation>
    <scope>X-RAY CRYSTALLOGRAPHY (1.65 ANGSTROMS) OF 94-312 IN COMPLEX WITH ZINC IONS</scope>
</reference>
<reference key="190">
    <citation type="journal article" date="2008" name="Acta Crystallogr. D">
        <title>Impact of low-frequency hotspot mutation R282Q on the structure of p53 DNA-binding domain as revealed by crystallography at 1.54 angstroms resolution.</title>
        <authorList>
            <person name="Tu C."/>
            <person name="Tan Y.H."/>
            <person name="Shaw G."/>
            <person name="Zhou Z."/>
            <person name="Bai Y."/>
            <person name="Luo R."/>
            <person name="Ji X."/>
        </authorList>
    </citation>
    <scope>X-RAY CRYSTALLOGRAPHY (1.54 ANGSTROMS) OF 94-292 OF VARIANT GLN-282</scope>
</reference>
<reference key="191">
    <citation type="journal article" date="2008" name="Proc. Natl. Acad. Sci. U.S.A.">
        <title>Targeted rescue of a destabilized mutant of p53 by an in silico screened drug.</title>
        <authorList>
            <person name="Boeckler F.M."/>
            <person name="Joerger A.C."/>
            <person name="Jaggi G."/>
            <person name="Rutherford T.J."/>
            <person name="Veprintsev D.B."/>
            <person name="Fersht A.R."/>
        </authorList>
    </citation>
    <scope>X-RAY CRYSTALLOGRAPHY (1.5 ANGSTROMS) OF 94-312 OF VARIANT CYS-202 IN COMPLEX WITH ZINC IONS AND PHIKAN083</scope>
</reference>
<reference key="192">
    <citation type="journal article" date="2009" name="J. Mol. Biol.">
        <title>Structural basis of restoring sequence-specific DNA binding and transactivation to mutant p53 by suppressor mutations.</title>
        <authorList>
            <person name="Suad O."/>
            <person name="Rozenberg H."/>
            <person name="Brosh R."/>
            <person name="Diskin-Posner Y."/>
            <person name="Kessler N."/>
            <person name="Shimon L.J."/>
            <person name="Frolow F."/>
            <person name="Liran A."/>
            <person name="Rotter V."/>
            <person name="Shakked Z."/>
        </authorList>
    </citation>
    <scope>X-RAY CRYSTALLOGRAPHY (1.2 ANGSTROMS) OF 94-293 OF VARIANT SER-249 IN COMPLEX WITH DNA</scope>
</reference>
<reference key="193">
    <citation type="journal article" date="2009" name="Protein Eng. Des. Sel.">
        <title>Stabilising the DNA-binding domain of p53 by rational design of its hydrophobic core.</title>
        <authorList>
            <person name="Khoo K.H."/>
            <person name="Joerger A.C."/>
            <person name="Freund S.M."/>
            <person name="Fersht A.R."/>
        </authorList>
    </citation>
    <scope>X-RAY CRYSTALLOGRAPHY (1.75 ANGSTROMS) OF 94-310 IN COMPLEX WITH ZINC IONS</scope>
</reference>
<reference key="194">
    <citation type="journal article" date="2010" name="Chem. Biol.">
        <title>Toward the rational design of p53-stabilizing drugs: probing the surface of the oncogenic Y220C mutant.</title>
        <authorList>
            <person name="Basse N."/>
            <person name="Kaar J.L."/>
            <person name="Settanni G."/>
            <person name="Joerger A.C."/>
            <person name="Rutherford T.J."/>
            <person name="Fersht A.R."/>
        </authorList>
    </citation>
    <scope>X-RAY CRYSTALLOGRAPHY (1.6 ANGSTROMS) OF 94-312 OF VARIANT CYS-220 IN COMPLEX WITH ZINC IONS</scope>
</reference>
<reference key="195">
    <citation type="journal article" date="2010" name="Nat. Struct. Mol. Biol.">
        <title>Diversity in DNA recognition by p53 revealed by crystal structures with Hoogsteen base pairs.</title>
        <authorList>
            <person name="Kitayner M."/>
            <person name="Rozenberg H."/>
            <person name="Rohs R."/>
            <person name="Suad O."/>
            <person name="Rabinovich D."/>
            <person name="Honig B."/>
            <person name="Shakked Z."/>
        </authorList>
    </citation>
    <scope>X-RAY CRYSTALLOGRAPHY (1.7 ANGSTROMS) OF 94-293 IN COMPLEX WITH DNA AND ZINC IONS</scope>
    <scope>SUBUNIT</scope>
</reference>
<reference evidence="194" key="196">
    <citation type="journal article" date="2020" name="Structure">
        <title>Structure Determination of the Transactivation Domain of p53 in Complex with S100A4Using Annexin A2 as a Crystallization Chaperone.</title>
        <authorList>
            <person name="Ecsedi P."/>
            <person name="Gogl G."/>
            <person name="Hof H."/>
            <person name="Kiss B."/>
            <person name="Harmat V."/>
            <person name="Nyitray L."/>
        </authorList>
    </citation>
    <scope>X-RAY CRYSTALLOGRAPHY (3.10 ANGSTROMS) OF 17-56</scope>
    <scope>INTERACTION WITH S100A4</scope>
</reference>
<reference key="197">
    <citation type="journal article" date="1991" name="Hum. Genet.">
        <title>Characterization of a frequent polymorphism in the coding sequence of the Tp53 gene in colonic cancer patients and a control population.</title>
        <authorList>
            <person name="Olschwang S."/>
            <person name="Laurent-Puig P."/>
            <person name="Vassal A."/>
            <person name="Salmon R.-J."/>
            <person name="Thomas G."/>
        </authorList>
    </citation>
    <scope>VARIANT ARG-72</scope>
</reference>
<reference key="198">
    <citation type="journal article" date="1991" name="Cancer Res.">
        <title>A germ line mutation in exon 5 of the p53 gene in an extended cancer family.</title>
        <authorList>
            <person name="Law J.C."/>
            <person name="Strong L.C."/>
            <person name="Chidambaram A."/>
            <person name="Ferrell R.E."/>
        </authorList>
    </citation>
    <scope>VARIANT LFS THR-133</scope>
</reference>
<reference key="199">
    <citation type="journal article" date="1990" name="Science">
        <title>Germ line p53 mutations in a familial syndrome of breast cancer, sarcomas, and other neoplasms.</title>
        <authorList>
            <person name="Malkin D."/>
            <person name="Li F.P."/>
            <person name="Strong L.C."/>
            <person name="Fraumeni J.F. Jr."/>
            <person name="Nelson C.E."/>
            <person name="Kim D.H."/>
            <person name="Kassel J."/>
            <person name="Gryka M.A."/>
            <person name="Bischoff F.Z."/>
            <person name="Tainsky M.A."/>
            <person name="Friend S.H."/>
        </authorList>
    </citation>
    <scope>VARIANTS LFS CYS-245; TRP-248; PRO-252 AND LYS-258</scope>
</reference>
<reference key="200">
    <citation type="journal article" date="1990" name="Nature">
        <title>Germ-line transmission of a mutated p53 gene in a cancer-prone family with Li-Fraumeni syndrome.</title>
        <authorList>
            <person name="Srivastava S."/>
            <person name="Zou Z."/>
            <person name="Pirollo K."/>
            <person name="Blattner W."/>
            <person name="Chang E.H."/>
        </authorList>
    </citation>
    <scope>VARIANT LFS ASP-245</scope>
</reference>
<reference key="201">
    <citation type="journal article" date="1992" name="J. Clin. Invest.">
        <title>Hereditary and acquired p53 gene mutations in childhood acute lymphoblastic leukemia.</title>
        <authorList>
            <person name="Felix C.A."/>
            <person name="Nau M.M."/>
            <person name="Takahashi T."/>
            <person name="Mitsudomi T."/>
            <person name="Chiba I."/>
            <person name="Poplack D.G."/>
            <person name="Reaman G.H."/>
            <person name="Cole D.E."/>
            <person name="Letterio J.J."/>
            <person name="Whang-Peng J."/>
            <person name="Knutsen T."/>
            <person name="Minna J.D."/>
        </authorList>
    </citation>
    <scope>VARIANT LFS LEU-272</scope>
</reference>
<reference key="202">
    <citation type="journal article" date="1992" name="N. Engl. J. Med.">
        <title>Germline mutations of the p53 tumor-suppressor gene in children and young adults with second malignant neoplasms.</title>
        <authorList>
            <person name="Malkin D."/>
            <person name="Jolly K.W."/>
            <person name="Barbier N."/>
            <person name="Look A.T."/>
            <person name="Friend S.H."/>
            <person name="Gebhardt M.C."/>
            <person name="Andersen T.I."/>
            <person name="Boerresen A.-L."/>
            <person name="Li F.P."/>
            <person name="Garber J."/>
            <person name="Strong L.C."/>
        </authorList>
    </citation>
    <scope>VARIANTS LFS HIS-273 AND VAL-325</scope>
</reference>
<reference key="203">
    <citation type="journal article" date="1990" name="Oncogene">
        <title>Genetic and immunochemical analysis of mutant p53 in human breast cancer cell lines.</title>
        <authorList>
            <person name="Bartek J."/>
            <person name="Iggo R."/>
            <person name="Gannon J."/>
            <person name="Lane D.P."/>
        </authorList>
    </citation>
    <scope>VARIANTS SPORADIC CANCERS GLN-132; SER-249; LYS-280 AND LYS-285</scope>
</reference>
<reference key="204">
    <citation type="journal article" date="1990" name="Proc. Natl. Acad. Sci. U.S.A.">
        <title>p53 mutations in colorectal cancer.</title>
        <authorList>
            <person name="Rodrigues N.R."/>
            <person name="Rowan A."/>
            <person name="Smith M.E.F."/>
            <person name="Kerr I.B."/>
            <person name="Bodmer W.F."/>
            <person name="Gannon J.V."/>
            <person name="Lane D.P."/>
        </authorList>
    </citation>
    <scope>VARIANTS SPORADIC CANCERS PHE-241 AND HIS-273</scope>
</reference>
<reference key="205">
    <citation type="journal article" date="1990" name="Proc. Natl. Acad. Sci. U.S.A.">
        <title>Frequent mutation of the p53 gene in human esophageal cancer.</title>
        <authorList>
            <person name="Hollstein M.C."/>
            <person name="Metcalf R.A."/>
            <person name="Welsh J.A."/>
            <person name="Montesano R."/>
            <person name="Harris C.C."/>
        </authorList>
    </citation>
    <scope>VARIANTS SPORADIC CANCER VAL-154; VAL-245; GLN-248; LEU-278 AND SER-278</scope>
</reference>
<reference key="206">
    <citation type="journal article" date="1991" name="Biochem. Biophys. Res. Commun.">
        <title>Mutations of the P53 gene, including an intronic point mutation, in colorectal tumors.</title>
        <authorList>
            <person name="Ishioka C."/>
            <person name="Sato T."/>
            <person name="Gamoh M."/>
            <person name="Suzuki T."/>
            <person name="Shibata H."/>
            <person name="Kanamaru R."/>
            <person name="Wakui A."/>
            <person name="Yamazaki T."/>
        </authorList>
    </citation>
    <scope>VARIANTS SPORADIC CANCERS</scope>
</reference>
<reference key="207">
    <citation type="journal article" date="1991" name="Cancer Res.">
        <title>p53 gene mutations in Barrett's epithelium and esophageal cancer.</title>
        <authorList>
            <person name="Casson A.G."/>
            <person name="Mukhopadhyay T."/>
            <person name="Cleary K.R."/>
            <person name="Ro J.Y."/>
            <person name="Levin B."/>
            <person name="Roth J.A."/>
        </authorList>
    </citation>
    <scope>VARIANTS SPORADIC CANCERS LEU-152; ALA-155; HIS-175; PHE-176 AND HIS-273</scope>
</reference>
<reference key="208">
    <citation type="journal article" date="1991" name="Nature">
        <title>Mutational hotspot in the p53 gene in human hepatocellular carcinomas.</title>
        <authorList>
            <person name="Hsu I.C."/>
            <person name="Metcalf R.A."/>
            <person name="Sun T."/>
            <person name="Welsh J.A."/>
            <person name="Wang N.J."/>
            <person name="Harris C.C."/>
        </authorList>
    </citation>
    <scope>VARIANTS SPORADIC CANCERS IN CHINA</scope>
</reference>
<reference key="209">
    <citation type="journal article" date="1991" name="Nature">
        <title>Selective G to T mutations of p53 gene in hepatocellular carcinoma from southern Africa.</title>
        <authorList>
            <person name="Bressac B."/>
            <person name="Kew M."/>
            <person name="Wands J."/>
            <person name="Ozturk M."/>
        </authorList>
    </citation>
    <scope>VARIANTS SPORADIC CANCERS IN SOUTH AFRICA</scope>
</reference>
<reference key="210">
    <citation type="journal article" date="1992" name="Cancer Res.">
        <title>Frequent p53 mutations in head and neck cancer.</title>
        <authorList>
            <person name="Somers K.D."/>
            <person name="Merrick M.A."/>
            <person name="Lopez M.E."/>
            <person name="Incognito L.S."/>
            <person name="Schechter G.L."/>
            <person name="Casey G."/>
        </authorList>
    </citation>
    <scope>VARIANTS SPORADIC CANCERS PHE-176; PHE-242; CYS-245; LEU-248 AND HIS-273</scope>
</reference>
<reference key="211">
    <citation type="journal article" date="1992" name="EMBO J.">
        <title>Properties of p53 mutations detected in primary and secondary cervical cancers suggest mechanisms of metastasis and involvement of environmental carcinogens.</title>
        <authorList>
            <person name="Crook T."/>
            <person name="Vousden K.H."/>
        </authorList>
    </citation>
    <scope>VARIANTS SPORADIC CANCERS</scope>
</reference>
<reference key="212">
    <citation type="journal article" date="1992" name="Int. J. Cancer">
        <title>The p53 tumor-suppressor gene and ras oncogene mutations in oral squamous-cell carcinoma.</title>
        <authorList>
            <person name="Sakai E."/>
            <person name="Rikimaru K."/>
            <person name="Ueda M."/>
            <person name="Matsumoto Y."/>
            <person name="Ishii N."/>
            <person name="Enomoto S."/>
            <person name="Yamamoto H."/>
            <person name="Tsuchida N."/>
        </authorList>
    </citation>
    <scope>VARIANTS SPORADIC CANCERS CYS-205; GLU-281 AND LYS-285</scope>
</reference>
<reference key="213">
    <citation type="journal article" date="1992" name="Hum. Mol. Genet.">
        <title>A novel mutation in the p53 gene in a Burkitt's lymphoma cell line.</title>
        <authorList>
            <person name="Bhatia K."/>
            <person name="Guiterrez M.I."/>
            <person name="Magrath I.T."/>
        </authorList>
    </citation>
    <scope>VARIANT PRO-HIS-PRO-178 INS</scope>
</reference>
<reference key="214">
    <citation type="journal article" date="1992" name="Oncogene">
        <title>p53 mutations in Raji cells: characterization and localization relative to other Burkitt's lymphomas.</title>
        <authorList>
            <person name="Duthu A."/>
            <person name="Debuire B."/>
            <person name="Romano J.W."/>
            <person name="Ehrhart J.C."/>
            <person name="Fiscella M."/>
            <person name="May E."/>
            <person name="Appella E."/>
            <person name="May P."/>
        </authorList>
    </citation>
    <scope>VARIANTS SPORADIC CANCERS</scope>
</reference>
<reference key="215">
    <citation type="journal article" date="1992" name="Proc. Natl. Acad. Sci. U.S.A.">
        <title>An infrequent point mutation of the p53 gene in human nasopharyngeal carcinoma.</title>
        <authorList>
            <person name="Sun Y."/>
            <person name="Hegamyer G."/>
            <person name="Heng Y.-J."/>
            <person name="Hildesheim A."/>
            <person name="Chen J.-Y."/>
            <person name="Chen I.-H."/>
            <person name="Cao Y."/>
            <person name="Yao K.-T."/>
            <person name="Colburn N.H."/>
        </authorList>
    </citation>
    <scope>VARIANT SPORADIC CANCER THR-280</scope>
</reference>
<reference key="216">
    <citation type="journal article" date="1993" name="Am. J. Pathol.">
        <title>p53 alterations in human squamous cell carcinomas and carcinoma cell lines.</title>
        <authorList>
            <person name="Caamano J."/>
            <person name="Zhang S.Y."/>
            <person name="Rosvold E.A."/>
            <person name="Bauer B."/>
            <person name="Klein-Szanto A.J.P."/>
        </authorList>
    </citation>
    <scope>VARIANTS SPORADIC CANCERS SER-151; PRO-156; LYS-174; ARG-194; CYS-220; GLN-248; LEU-248 AND HIS-273</scope>
</reference>
<reference key="217">
    <citation type="journal article" date="1993" name="Cancer Res.">
        <title>The incidence of p53 mutations increases with progression of head and neck cancer.</title>
        <authorList>
            <person name="Boyle J.O."/>
            <person name="Hakim J."/>
            <person name="Koch W."/>
            <person name="van der Riet P."/>
            <person name="Hruban R.H."/>
            <person name="Roa R.A."/>
            <person name="Correo R."/>
            <person name="Eby Y.J."/>
            <person name="Ruppert J.M."/>
            <person name="Sidransky D."/>
        </authorList>
    </citation>
    <scope>VARIANTS SPORADIC CANCERS</scope>
</reference>
<reference key="218">
    <citation type="journal article" date="1993" name="Oncogene">
        <title>Efficient screening of p53 mutations by denaturing gradient gel electrophoresis in colorectal tumors.</title>
        <authorList>
            <person name="Hamelin R."/>
            <person name="Jego N."/>
            <person name="Laurent-Puig P."/>
            <person name="Vidaud M."/>
            <person name="Thomas G."/>
        </authorList>
    </citation>
    <scope>VARIANTS SPORADIC CANCERS</scope>
</reference>
<reference key="219">
    <citation type="journal article" date="1994" name="Cancer Res.">
        <title>Prevalence and diversity of constitutional mutations in the p53 gene among 21 Li-Fraumeni families.</title>
        <authorList>
            <person name="Birch J.M."/>
            <person name="Hartley A.L."/>
            <person name="Tricker K.J."/>
            <person name="Prosser J."/>
            <person name="Condie A."/>
            <person name="Kelsey A.M."/>
            <person name="Harris M."/>
            <person name="Jones P.H."/>
            <person name="Binchy A."/>
            <person name="Crowther D."/>
            <person name="Craft A.W."/>
            <person name="Eden O.B."/>
            <person name="Evans D.G.R."/>
            <person name="Thompson E."/>
            <person name="Mann J.R."/>
            <person name="Martin J."/>
            <person name="Mitchell E.L.D."/>
            <person name="Santibanez-Koref M.F."/>
        </authorList>
    </citation>
    <scope>VARIANTS</scope>
    <scope>INVOLVEMENT IN LFL</scope>
</reference>
<reference key="220">
    <citation type="journal article" date="1994" name="EMBO J.">
        <title>A temperature-sensitive mutant of human p53.</title>
        <authorList>
            <person name="Zhang W."/>
            <person name="Guo X.-Y."/>
            <person name="Hu G.-Y."/>
            <person name="Liu W.-B."/>
            <person name="Shay J.W."/>
            <person name="Deisseroth A.B."/>
        </authorList>
    </citation>
    <scope>CHARACTERIZATION OF VARIANT ALA-143</scope>
</reference>
<reference key="221">
    <citation type="journal article" date="1995" name="Am. J. Hum. Genet.">
        <title>Germ-line p53 mutations in 15 families with Li-Fraumeni syndrome.</title>
        <authorList>
            <person name="Frebourg T."/>
            <person name="Barbier N."/>
            <person name="Yan Y.-X."/>
            <person name="Garber J.E."/>
            <person name="Dreyfus M."/>
            <person name="Fraumeni J.F. Jr."/>
            <person name="Li F.P."/>
            <person name="Friend S.H."/>
        </authorList>
    </citation>
    <scope>VARIANTS LFS HIS-175; ARG-193; GLN-248; CYS-273 AND TYR-275</scope>
</reference>
<reference key="222">
    <citation type="journal article" date="1995" name="Cancer Surv.">
        <title>Germline mutations in the TP53 gene.</title>
        <authorList>
            <person name="Eeles R.A."/>
        </authorList>
    </citation>
    <scope>VARIANTS</scope>
    <scope>INVOLVEMENT IN LFL</scope>
</reference>
<reference key="223">
    <citation type="journal article" date="1995" name="J. Med. Genet.">
        <title>An extended Li-Fraumeni kindred with gastric carcinoma and a codon 175 mutation in TP53.</title>
        <authorList>
            <person name="Varley J.M."/>
            <person name="McGrown G."/>
            <person name="Thorncroft M."/>
            <person name="Tricker K.J."/>
            <person name="Teare M.D."/>
            <person name="Santibanez-Koref M.F."/>
            <person name="Houlston R.S."/>
            <person name="Martin J."/>
            <person name="Birch J.M."/>
            <person name="Evans D.G.R."/>
        </authorList>
    </citation>
    <scope>VARIANT LFS HIS-175</scope>
</reference>
<reference key="224">
    <citation type="journal article" date="1996" name="Hum. Mutat.">
        <title>Molecular analysis of the TP53 gene in Barrett's adenocarcinoma.</title>
        <authorList>
            <person name="Audrezet M.-P."/>
            <person name="Robaszkiewicz M."/>
            <person name="Mercier B."/>
            <person name="Nousbaum J.-B."/>
            <person name="Hardy E."/>
            <person name="Bail J.-P."/>
            <person name="Volant A."/>
            <person name="Lozac'H P."/>
            <person name="Gouerou H."/>
            <person name="Ferec C."/>
        </authorList>
    </citation>
    <scope>VARIANTS SPORADIC CANCERS PHE-176; SER-245; TRP-248; TRP-282 AND GLN-286</scope>
</reference>
<reference key="225">
    <citation type="journal article" date="1997" name="Hum. Mutat.">
        <title>Single-step DGGE-based mutation scanning of the p53 gene: application to genetic diagnosis of colorectal cancer.</title>
        <authorList>
            <person name="Guldberg P."/>
            <person name="Nedergaard T."/>
            <person name="Nielsen H.J."/>
            <person name="Olsen A.C."/>
            <person name="Ahrenkiel V."/>
            <person name="Zeuthen J."/>
        </authorList>
    </citation>
    <scope>VARIANTS SPORADIC CANCERS</scope>
</reference>
<reference key="226">
    <citation type="journal article" date="1997" name="Oncogene">
        <title>Drastic genetic instability of tumors and normal tissues in Turcot syndrome.</title>
        <authorList>
            <person name="Miyaki M."/>
            <person name="Nishio J."/>
            <person name="Konishi M."/>
            <person name="Kikuchi-Yanoshita R."/>
            <person name="Tanaka K."/>
            <person name="Muraoka M."/>
            <person name="Nagato M."/>
            <person name="Chong J.-M."/>
            <person name="Koike M."/>
            <person name="Terada T."/>
            <person name="Kawahara Y."/>
            <person name="Fukutome A."/>
            <person name="Tomiyama J."/>
            <person name="Chuganji Y."/>
            <person name="Momoi M."/>
            <person name="Utsunomiya J."/>
        </authorList>
    </citation>
    <scope>VARIANT SPORADIC CANCER ILE-157</scope>
</reference>
<reference key="227">
    <citation type="journal article" date="1998" name="Hum. Mutat.">
        <title>Detection of p53 gene mutations in oral squamous cell carcinomas of a black African population sample.</title>
        <authorList>
            <person name="van Rensburg E.J."/>
            <person name="Engelbrecht S."/>
            <person name="van Heerden W.F.P."/>
            <person name="Kotze M.J."/>
            <person name="Raubenheimer E.J."/>
        </authorList>
    </citation>
    <scope>VARIANTS SER-152; ILE-169; PHE-176; THR-195; CYS-220; ILE-230; CYS-273 AND SER-278</scope>
</reference>
<reference key="228">
    <citation type="journal article" date="1998" name="Hum. Mutat. Suppl.">
        <title>A germline missense mutation R337C in exon 10 of the human p53 gene.</title>
        <authorList>
            <person name="Luca J.W."/>
            <person name="Strong L.C."/>
            <person name="Hansen M.F."/>
        </authorList>
    </citation>
    <scope>VARIANT NON-CLASSICAL LFS CYS-337</scope>
</reference>
<reference key="229">
    <citation type="journal article" date="1999" name="Cancer Genet. Cytogenet.">
        <title>Hereditary TP53 codon 292 and somatic P16INK4A codon 94 mutations in a Li-Fraumeni syndrome family.</title>
        <authorList>
            <person name="Gueran S."/>
            <person name="Tunca Y."/>
            <person name="Imirzalioglu N."/>
        </authorList>
    </citation>
    <scope>VARIANT LFS ILE-292</scope>
</reference>
<reference key="230">
    <citation type="journal article" date="2000" name="Adv. Cancer Res.">
        <title>p53 and human cancer: the first ten thousand mutations.</title>
        <authorList>
            <person name="Hainaut P."/>
            <person name="Hollstein M."/>
        </authorList>
    </citation>
    <scope>VARIANTS</scope>
</reference>
<reference key="231">
    <citation type="journal article" date="2001" name="Proc. Natl. Acad. Sci. U.S.A.">
        <title>An inherited p53 mutation that contributes in a tissue-specific manner to pediatric adrenal cortical carcinoma.</title>
        <authorList>
            <person name="Ribeiro R.C."/>
            <person name="Sandrini F."/>
            <person name="Figueiredo B."/>
            <person name="Zambetti G.P."/>
            <person name="Michalkiewicz E."/>
            <person name="Lafferty A.R."/>
            <person name="DeLacerda L."/>
            <person name="Rabin M."/>
            <person name="Cadwell C."/>
            <person name="Sampaio G."/>
            <person name="Cat I."/>
            <person name="Stratakis C.A."/>
            <person name="Sandrini R."/>
        </authorList>
    </citation>
    <scope>VARIANT ADCC HIS-337</scope>
</reference>
<reference key="232">
    <citation type="journal article" date="2002" name="Br. J. Cancer">
        <title>Investigations on a clinically and functionally unusual and novel germline p53 mutation.</title>
        <authorList>
            <person name="Rutherford J."/>
            <person name="Chu C.E."/>
            <person name="Duddy P.M."/>
            <person name="Charlton R.S."/>
            <person name="Chumas P."/>
            <person name="Taylor G.R."/>
            <person name="Lu X."/>
            <person name="Barnes D.M."/>
            <person name="Camplejohn R.S."/>
        </authorList>
    </citation>
    <scope>INVOLVEMENT IN CPP</scope>
</reference>
<reference key="233">
    <citation type="journal article" date="2006" name="Science">
        <title>The consensus coding sequences of human breast and colorectal cancers.</title>
        <authorList>
            <person name="Sjoeblom T."/>
            <person name="Jones S."/>
            <person name="Wood L.D."/>
            <person name="Parsons D.W."/>
            <person name="Lin J."/>
            <person name="Barber T.D."/>
            <person name="Mandelker D."/>
            <person name="Leary R.J."/>
            <person name="Ptak J."/>
            <person name="Silliman N."/>
            <person name="Szabo S."/>
            <person name="Buckhaults P."/>
            <person name="Farrell C."/>
            <person name="Meeh P."/>
            <person name="Markowitz S.D."/>
            <person name="Willis J."/>
            <person name="Dawson D."/>
            <person name="Willson J.K.V."/>
            <person name="Gazdar A.F."/>
            <person name="Hartigan J."/>
            <person name="Wu L."/>
            <person name="Liu C."/>
            <person name="Parmigiani G."/>
            <person name="Park B.H."/>
            <person name="Bachman K.E."/>
            <person name="Papadopoulos N."/>
            <person name="Vogelstein B."/>
            <person name="Kinzler K.W."/>
            <person name="Velculescu V.E."/>
        </authorList>
    </citation>
    <scope>VARIANTS [LARGE SCALE ANALYSIS] LEU-134; PHE-157; CYS-163; HIS-175; ARG-177; ARG-193; PRO-213; PHE-241; PHE-242; GLN-248; TRP-248; SER-249; TRP-267; LYS-271; CYS-273; HIS-273; LEU-273; SER-278; ILE-280 AND HIS-281</scope>
</reference>
<reference key="234">
    <citation type="journal article" date="2007" name="Breast Cancer Res.">
        <title>Somatic sequence alterations in twenty-one genes selected by expression profile analysis of breast carcinomas.</title>
        <authorList>
            <person name="Chanock S.J."/>
            <person name="Burdett L."/>
            <person name="Yeager M."/>
            <person name="Llaca V."/>
            <person name="Langeroed A."/>
            <person name="Presswalla S."/>
            <person name="Kaaresen R."/>
            <person name="Strausberg R.L."/>
            <person name="Gerhard D.S."/>
            <person name="Kristensen V."/>
            <person name="Perou C.M."/>
            <person name="Boerresen-Dale A.-L."/>
        </authorList>
    </citation>
    <scope>VARIANTS PRO-110; VAL-113; VAL-138; CYS-163; HIS-163; THR-195; MET-216; ALA-241; MET-249; SER-251; TYR-259 AND CYS-273</scope>
</reference>
<reference key="235">
    <citation type="journal article" date="2007" name="Hum. Mutat.">
        <title>Impact of mutant p53 functional properties on TP53 mutation patterns and tumor phenotype: lessons from recent developments in the IARC TP53 database.</title>
        <authorList>
            <person name="Petitjean A."/>
            <person name="Mathe E."/>
            <person name="Kato S."/>
            <person name="Ishioka C."/>
            <person name="Tavtigian S.V."/>
            <person name="Hainaut P."/>
            <person name="Olivier M."/>
        </authorList>
    </citation>
    <scope>VARIANTS</scope>
</reference>
<reference key="236">
    <citation type="journal article" date="2015" name="Cell Rep.">
        <title>DBC1 functions as a tumor suppressor by regulating p53 stability.</title>
        <authorList>
            <person name="Qin B."/>
            <person name="Minter-Dykhouse K."/>
            <person name="Yu J."/>
            <person name="Zhang J."/>
            <person name="Liu T."/>
            <person name="Zhang H."/>
            <person name="Lee S."/>
            <person name="Kim J."/>
            <person name="Wang L."/>
            <person name="Lou Z."/>
        </authorList>
    </citation>
    <scope>CHARACTERIZATION OF VARIANT SPORADIC CANCER LYS-280</scope>
    <scope>UBIQUITINATION</scope>
    <scope>PROTEASOMAL DEGRADATION</scope>
    <scope>INTERACTION WITH CCAR2</scope>
</reference>
<reference key="237">
    <citation type="journal article" date="2016" name="PLoS Biol.">
        <title>Phosphorylation of Def Regulates Nucleolar p53 Turnover and Cell Cycle Progression through Def Recruitment of Calpain3.</title>
        <authorList>
            <person name="Guan Y."/>
            <person name="Huang D."/>
            <person name="Chen F."/>
            <person name="Gao C."/>
            <person name="Tao T."/>
            <person name="Shi H."/>
            <person name="Zhao S."/>
            <person name="Liao Z."/>
            <person name="Lo L.J."/>
            <person name="Wang Y."/>
            <person name="Chen J."/>
            <person name="Peng J."/>
        </authorList>
    </citation>
    <scope>VARIANTS VAL-138; HIS-175; ILE-237; TRP-248 AND PRO-273</scope>
</reference>
<organism>
    <name type="scientific">Homo sapiens</name>
    <name type="common">Human</name>
    <dbReference type="NCBI Taxonomy" id="9606"/>
    <lineage>
        <taxon>Eukaryota</taxon>
        <taxon>Metazoa</taxon>
        <taxon>Chordata</taxon>
        <taxon>Craniata</taxon>
        <taxon>Vertebrata</taxon>
        <taxon>Euteleostomi</taxon>
        <taxon>Mammalia</taxon>
        <taxon>Eutheria</taxon>
        <taxon>Euarchontoglires</taxon>
        <taxon>Primates</taxon>
        <taxon>Haplorrhini</taxon>
        <taxon>Catarrhini</taxon>
        <taxon>Hominidae</taxon>
        <taxon>Homo</taxon>
    </lineage>
</organism>
<feature type="chain" id="PRO_0000185703" description="Cellular tumor antigen p53">
    <location>
        <begin position="1"/>
        <end position="393"/>
    </location>
</feature>
<feature type="DNA-binding region" evidence="62 97 120">
    <location>
        <begin position="102"/>
        <end position="292"/>
    </location>
</feature>
<feature type="region of interest" description="Interaction with CCAR2" evidence="148">
    <location>
        <begin position="1"/>
        <end position="320"/>
    </location>
</feature>
<feature type="region of interest" description="Interaction with HRMT1L2" evidence="42">
    <location>
        <begin position="1"/>
        <end position="83"/>
    </location>
</feature>
<feature type="region of interest" description="Transcription activation (acidic)">
    <location>
        <begin position="1"/>
        <end position="44"/>
    </location>
</feature>
<feature type="region of interest" description="Disordered" evidence="161">
    <location>
        <begin position="50"/>
        <end position="96"/>
    </location>
</feature>
<feature type="region of interest" description="Interaction with WWOX">
    <location>
        <begin position="66"/>
        <end position="110"/>
    </location>
</feature>
<feature type="region of interest" description="Interaction with HIPK1" evidence="1">
    <location>
        <begin position="100"/>
        <end position="370"/>
    </location>
</feature>
<feature type="region of interest" description="Required for interaction with ZNF385A" evidence="85">
    <location>
        <begin position="100"/>
        <end position="300"/>
    </location>
</feature>
<feature type="region of interest" description="Required for interaction with FBXO42" evidence="102">
    <location>
        <begin position="113"/>
        <end position="236"/>
    </location>
</feature>
<feature type="region of interest" description="Interaction with AXIN1" evidence="1">
    <location>
        <begin position="116"/>
        <end position="292"/>
    </location>
</feature>
<feature type="region of interest" description="Interaction with the 53BP2 SH3 domain">
    <location>
        <begin position="241"/>
        <end position="248"/>
    </location>
</feature>
<feature type="region of interest" description="Interaction with E4F1" evidence="9">
    <location>
        <begin position="256"/>
        <end position="294"/>
    </location>
</feature>
<feature type="region of interest" description="Interaction with DNA">
    <location>
        <begin position="273"/>
        <end position="280"/>
    </location>
</feature>
<feature type="region of interest" description="Disordered" evidence="4">
    <location>
        <begin position="282"/>
        <end position="325"/>
    </location>
</feature>
<feature type="region of interest" description="Interaction with CARM1" evidence="42">
    <location>
        <begin position="300"/>
        <end position="393"/>
    </location>
</feature>
<feature type="region of interest" description="Interaction with HIPK2">
    <location>
        <begin position="319"/>
        <end position="360"/>
    </location>
</feature>
<feature type="region of interest" description="Oligomerization">
    <location>
        <begin position="325"/>
        <end position="356"/>
    </location>
</feature>
<feature type="region of interest" description="Disordered" evidence="161 168">
    <location>
        <begin position="351"/>
        <end position="393"/>
    </location>
</feature>
<feature type="region of interest" description="Interaction with USP7">
    <location>
        <begin position="359"/>
        <end position="363"/>
    </location>
</feature>
<feature type="region of interest" description="Basic (repression of DNA-binding)">
    <location>
        <begin position="368"/>
        <end position="387"/>
    </location>
</feature>
<feature type="region of interest" description="Interaction with MORN3" evidence="158">
    <location>
        <begin position="374"/>
        <end position="393"/>
    </location>
</feature>
<feature type="short sequence motif" description="TADI">
    <location>
        <begin position="17"/>
        <end position="25"/>
    </location>
</feature>
<feature type="short sequence motif" description="TADII">
    <location>
        <begin position="48"/>
        <end position="56"/>
    </location>
</feature>
<feature type="short sequence motif" description="Bipartite nuclear localization signal">
    <location>
        <begin position="305"/>
        <end position="321"/>
    </location>
</feature>
<feature type="short sequence motif" description="Nuclear export signal">
    <location>
        <begin position="339"/>
        <end position="350"/>
    </location>
</feature>
<feature type="short sequence motif" description="[KR]-[STA]-K motif">
    <location>
        <begin position="370"/>
        <end position="372"/>
    </location>
</feature>
<feature type="compositionally biased region" description="Pro residues" evidence="4">
    <location>
        <begin position="69"/>
        <end position="90"/>
    </location>
</feature>
<feature type="compositionally biased region" description="Basic and acidic residues" evidence="4">
    <location>
        <begin position="282"/>
        <end position="299"/>
    </location>
</feature>
<feature type="compositionally biased region" description="Basic residues" evidence="4">
    <location>
        <begin position="365"/>
        <end position="384"/>
    </location>
</feature>
<feature type="binding site" evidence="33 62 67 94 103 117 120">
    <location>
        <position position="176"/>
    </location>
    <ligand>
        <name>Zn(2+)</name>
        <dbReference type="ChEBI" id="CHEBI:29105"/>
    </ligand>
</feature>
<feature type="binding site" evidence="33 62 67 94 103 117 120">
    <location>
        <position position="179"/>
    </location>
    <ligand>
        <name>Zn(2+)</name>
        <dbReference type="ChEBI" id="CHEBI:29105"/>
    </ligand>
</feature>
<feature type="binding site" evidence="33 62 67 94 103 117 120">
    <location>
        <position position="238"/>
    </location>
    <ligand>
        <name>Zn(2+)</name>
        <dbReference type="ChEBI" id="CHEBI:29105"/>
    </ligand>
</feature>
<feature type="binding site" evidence="33 62 67 94 103 117 120">
    <location>
        <position position="242"/>
    </location>
    <ligand>
        <name>Zn(2+)</name>
        <dbReference type="ChEBI" id="CHEBI:29105"/>
    </ligand>
</feature>
<feature type="site" description="Interaction with DNA" evidence="62 97 120">
    <location>
        <position position="120"/>
    </location>
</feature>
<feature type="modified residue" description="Phosphoserine; by HIPK4" evidence="90">
    <location>
        <position position="9"/>
    </location>
</feature>
<feature type="modified residue" description="Phosphoserine; by CDK5, PRPK, AMPK, NUAK1 and ATM" evidence="7 22 51 69 83 89 126 155">
    <location>
        <position position="15"/>
    </location>
</feature>
<feature type="modified residue" description="Phosphothreonine; by CK1, VRK1 and VRK2" evidence="8 13 61 160">
    <location>
        <position position="18"/>
    </location>
</feature>
<feature type="modified residue" description="Phosphoserine; by CHEK2, CK1 and PLK3" evidence="7 18 21 29 112">
    <location>
        <position position="20"/>
    </location>
</feature>
<feature type="modified residue" description="Phosphoserine; by CDK5 and CDK7" evidence="83 180">
    <location>
        <position position="33"/>
    </location>
</feature>
<feature type="modified residue" description="Phosphoserine; by MAPKAPK5" evidence="77">
    <location>
        <position position="37"/>
    </location>
</feature>
<feature type="modified residue" description="Phosphoserine; by CDK5, DYRK2, HIPK2 and PKC/PRKCG" evidence="23 24 57 80 83">
    <location>
        <position position="46"/>
    </location>
</feature>
<feature type="modified residue" description="Phosphothreonine; by TAF1 and GRK5" evidence="38 116">
    <location>
        <position position="55"/>
    </location>
</feature>
<feature type="modified residue" description="N6-acetyllysine" evidence="74 109 140">
    <location>
        <position position="120"/>
    </location>
</feature>
<feature type="modified residue" description="N6-lactoyllysine" evidence="170">
    <location>
        <position position="120"/>
    </location>
</feature>
<feature type="modified residue" description="N6-lactoyllysine" evidence="170">
    <location>
        <position position="139"/>
    </location>
</feature>
<feature type="modified residue" description="Phosphoserine; by AURKB" evidence="125">
    <location>
        <position position="183"/>
    </location>
</feature>
<feature type="modified residue" description="Phosphoserine; by AURKB" evidence="125">
    <location>
        <position position="269"/>
    </location>
</feature>
<feature type="modified residue" description="Phosphothreonine; by AURKB" evidence="125">
    <location>
        <position position="284"/>
    </location>
</feature>
<feature type="modified residue" description="N6-acetyllysine" evidence="27">
    <location>
        <position position="305"/>
    </location>
</feature>
<feature type="modified residue" description="Phosphoserine; by AURKA, CDK1 and CDK2" evidence="12 37">
    <location>
        <position position="315"/>
    </location>
</feature>
<feature type="modified residue" description="N6-acetyllysine" evidence="2">
    <location>
        <position position="321"/>
    </location>
</feature>
<feature type="modified residue" description="Omega-N-methylarginine; by PRMT5" evidence="98">
    <location>
        <position position="333"/>
    </location>
</feature>
<feature type="modified residue" description="Symmetric dimethylarginine; by PRMT5" evidence="98">
    <location>
        <position position="335"/>
    </location>
</feature>
<feature type="modified residue" description="Symmetric dimethylarginine; by PRMT5" evidence="98">
    <location>
        <position position="337"/>
    </location>
</feature>
<feature type="modified residue" description="N6,N6-dimethyllysine; alternate" evidence="70 138">
    <location>
        <position position="370"/>
    </location>
</feature>
<feature type="modified residue" description="N6-methyllysine; by SMYD2; alternate" evidence="70 138">
    <location>
        <position position="370"/>
    </location>
</feature>
<feature type="modified residue" description="N6-methyllysine; by SETD7" evidence="46 59">
    <location>
        <position position="372"/>
    </location>
</feature>
<feature type="modified residue" description="N6,N6-dimethyllysine; by EHMT1 and EHMT2; alternate" evidence="115">
    <location>
        <position position="373"/>
    </location>
</feature>
<feature type="modified residue" description="N6-acetyllysine; alternate" evidence="10">
    <location>
        <position position="373"/>
    </location>
</feature>
<feature type="modified residue" description="N6-acetyllysine" evidence="157 195">
    <location>
        <position position="381"/>
    </location>
</feature>
<feature type="modified residue" description="N6,N6-dimethyllysine; alternate" evidence="84 124 138">
    <location>
        <position position="382"/>
    </location>
</feature>
<feature type="modified residue" description="N6-acetyllysine; alternate" evidence="10 44 119 140 158 195">
    <location>
        <position position="382"/>
    </location>
</feature>
<feature type="modified residue" description="N6-methyllysine; by KMT5A; alternate" evidence="84 124 138">
    <location>
        <position position="382"/>
    </location>
</feature>
<feature type="modified residue" description="Phosphoserine; by CK2, CDK2 and NUAK1" evidence="12 17 69 126 133 167">
    <location>
        <position position="392"/>
    </location>
</feature>
<feature type="cross-link" description="Glycyl lysine isopeptide (Lys-Gly) (interchain with G-Cter in ubiquitin)" evidence="129">
    <location>
        <position position="24"/>
    </location>
</feature>
<feature type="cross-link" description="Glycyl lysine isopeptide (Lys-Gly) (interchain with G-Cter in ubiquitin)" evidence="104">
    <location>
        <position position="291"/>
    </location>
</feature>
<feature type="cross-link" description="Glycyl lysine isopeptide (Lys-Gly) (interchain with G-Cter in ubiquitin)" evidence="104">
    <location>
        <position position="292"/>
    </location>
</feature>
<feature type="cross-link" description="Glycyl lysine isopeptide (Lys-Gly) (interchain with G-Cter in ubiquitin)" evidence="99">
    <location>
        <position position="351"/>
    </location>
</feature>
<feature type="cross-link" description="Glycyl lysine isopeptide (Lys-Gly) (interchain with G-Cter in ubiquitin)" evidence="99">
    <location>
        <position position="357"/>
    </location>
</feature>
<feature type="cross-link" description="Glycyl lysine isopeptide (Lys-Gly) (interchain with G-Cter in SUMO)" evidence="16 133 190">
    <location>
        <position position="386"/>
    </location>
</feature>
<feature type="splice variant" id="VSP_040833" description="In isoform 7, isoform 8 and isoform 9." evidence="191">
    <location>
        <begin position="1"/>
        <end position="132"/>
    </location>
</feature>
<feature type="splice variant" id="VSP_040832" description="In isoform 4, isoform 5 and isoform 6." evidence="192">
    <location>
        <begin position="1"/>
        <end position="39"/>
    </location>
</feature>
<feature type="splice variant" id="VSP_040560" description="In isoform 3, isoform 6 and isoform 9." evidence="191">
    <original>IRGRERFEMFRELNE</original>
    <variation>MLLDLRWCYFLINSS</variation>
    <location>
        <begin position="332"/>
        <end position="346"/>
    </location>
</feature>
<feature type="splice variant" id="VSP_006535" description="In isoform 2, isoform 5 and isoform 8." evidence="191">
    <original>IRGRERFEMF</original>
    <variation>DQTSFQKENC</variation>
    <location>
        <begin position="332"/>
        <end position="341"/>
    </location>
</feature>
<feature type="splice variant" id="VSP_006536" description="In isoform 2, isoform 5 and isoform 8." evidence="191">
    <location>
        <begin position="342"/>
        <end position="393"/>
    </location>
</feature>
<feature type="splice variant" id="VSP_040561" description="In isoform 3, isoform 6 and isoform 9." evidence="191">
    <location>
        <begin position="347"/>
        <end position="393"/>
    </location>
</feature>
<feature type="sequence variant" id="VAR_044543" description="In a sporadic cancer; somatic mutation; abolishes strongly phosphorylation.">
    <original>Q</original>
    <variation>H</variation>
    <location>
        <position position="5"/>
    </location>
</feature>
<feature type="sequence variant" id="VAR_044544" description="In a sporadic cancer; somatic mutation; reduces interaction with ZNF385A.">
    <original>S</original>
    <variation>L</variation>
    <location>
        <position position="6"/>
    </location>
</feature>
<feature type="sequence variant" id="VAR_005851" description="In a sporadic cancer; somatic mutation; dbSNP:rs587782646.">
    <original>D</original>
    <variation>H</variation>
    <location>
        <position position="7"/>
    </location>
</feature>
<feature type="sequence variant" id="VAR_044545" description="In a sporadic cancer; somatic mutation.">
    <original>P</original>
    <variation>S</variation>
    <location>
        <position position="8"/>
    </location>
</feature>
<feature type="sequence variant" id="VAR_044546" description="In a sporadic cancer; somatic mutation; dbSNP:rs535274413.">
    <original>V</original>
    <variation>I</variation>
    <location>
        <position position="10"/>
    </location>
</feature>
<feature type="sequence variant" id="VAR_044547" description="In sporadic cancers; somatic mutation; dbSNP:rs201382018.">
    <original>E</original>
    <variation>K</variation>
    <location>
        <position position="11"/>
    </location>
</feature>
<feature type="sequence variant" id="VAR_044548" description="In sporadic cancers; somatic mutation; dbSNP:rs201382018.">
    <original>E</original>
    <variation>Q</variation>
    <location>
        <position position="11"/>
    </location>
</feature>
<feature type="sequence variant" id="VAR_044549" description="In a sporadic cancer; somatic mutation.">
    <original>S</original>
    <variation>R</variation>
    <location>
        <position position="15"/>
    </location>
</feature>
<feature type="sequence variant" id="VAR_044550" description="In a sporadic cancer; somatic mutation.">
    <original>Q</original>
    <variation>L</variation>
    <location>
        <position position="16"/>
    </location>
</feature>
<feature type="sequence variant" id="VAR_044551" description="In a sporadic cancer; somatic mutation.">
    <original>E</original>
    <variation>D</variation>
    <location>
        <position position="17"/>
    </location>
</feature>
<feature type="sequence variant" id="VAR_044552" description="In a sporadic cancer; somatic mutation.">
    <original>K</original>
    <variation>N</variation>
    <location>
        <position position="24"/>
    </location>
</feature>
<feature type="sequence variant" id="VAR_044553" description="In a sporadic cancer; somatic mutation.">
    <original>E</original>
    <variation>A</variation>
    <location>
        <position position="28"/>
    </location>
</feature>
<feature type="sequence variant" id="VAR_047158" description="In a sporadic cancer; somatic mutation.">
    <original>NN</original>
    <variation>KD</variation>
    <location>
        <begin position="29"/>
        <end position="30"/>
    </location>
</feature>
<feature type="sequence variant" id="VAR_044554" description="In sporadic cancers; somatic mutation; dbSNP:rs201753350.">
    <original>V</original>
    <variation>I</variation>
    <location>
        <position position="31"/>
    </location>
</feature>
<feature type="sequence variant" id="VAR_044555" description="In a sporadic cancer; somatic mutation.">
    <original>S</original>
    <variation>T</variation>
    <location>
        <position position="33"/>
    </location>
</feature>
<feature type="sequence variant" id="VAR_044556" description="In a sporadic cancer; somatic mutation.">
    <original>P</original>
    <variation>L</variation>
    <location>
        <position position="34"/>
    </location>
</feature>
<feature type="sequence variant" id="VAR_005852" description="In sporadic cancers; somatic mutation; dbSNP:rs121912661.">
    <original>L</original>
    <variation>F</variation>
    <location>
        <position position="35"/>
    </location>
</feature>
<feature type="sequence variant" id="VAR_044557" description="In a sporadic cancer; somatic mutation; dbSNP:rs587781866.">
    <original>P</original>
    <variation>L</variation>
    <location>
        <position position="36"/>
    </location>
</feature>
<feature type="sequence variant" id="VAR_044558" description="In a sporadic cancer; somatic mutation.">
    <original>S</original>
    <variation>P</variation>
    <location>
        <position position="37"/>
    </location>
</feature>
<feature type="sequence variant" id="VAR_044559" description="In a sporadic cancer; somatic mutation.">
    <original>S</original>
    <variation>T</variation>
    <location>
        <position position="37"/>
    </location>
</feature>
<feature type="sequence variant" id="VAR_044560" description="In a sporadic cancer; somatic mutation.">
    <original>A</original>
    <variation>P</variation>
    <location>
        <position position="39"/>
    </location>
</feature>
<feature type="sequence variant" id="VAR_044561" description="In a sporadic cancer; somatic mutation; dbSNP:rs1353016807.">
    <original>A</original>
    <variation>V</variation>
    <location>
        <position position="39"/>
    </location>
</feature>
<feature type="sequence variant" id="VAR_044562" description="In a sporadic cancer; somatic mutation.">
    <original>D</original>
    <variation>Y</variation>
    <location>
        <position position="42"/>
    </location>
</feature>
<feature type="sequence variant" id="VAR_005853" description="In a sporadic cancer; somatic mutation.">
    <original>L</original>
    <variation>S</variation>
    <location>
        <position position="43"/>
    </location>
</feature>
<feature type="sequence variant" id="VAR_044563" description="In a sporadic cancer; somatic mutation; dbSNP:rs1060501190.">
    <original>M</original>
    <variation>I</variation>
    <location>
        <position position="44"/>
    </location>
</feature>
<feature type="sequence variant" id="VAR_044564" description="In a sporadic cancer; somatic mutation.">
    <original>M</original>
    <variation>T</variation>
    <location>
        <position position="44"/>
    </location>
</feature>
<feature type="sequence variant" id="VAR_044565" description="In a sporadic cancer; somatic mutation.">
    <original>M</original>
    <variation>V</variation>
    <location>
        <position position="44"/>
    </location>
</feature>
<feature type="sequence variant" id="VAR_044566" description="In a sporadic cancer; somatic mutation.">
    <original>L</original>
    <variation>M</variation>
    <location>
        <position position="45"/>
    </location>
</feature>
<feature type="sequence variant" id="VAR_044567" description="In sporadic cancers; somatic mutation.">
    <original>S</original>
    <variation>F</variation>
    <location>
        <position position="46"/>
    </location>
</feature>
<feature type="sequence variant" id="VAR_044568" description="In sporadic cancers; somatic mutation; dbSNP:rs876659630.">
    <original>S</original>
    <variation>P</variation>
    <location>
        <position position="46"/>
    </location>
</feature>
<feature type="sequence variant" id="VAR_044569" description="In sporadic cancers; somatic mutation.">
    <original>P</original>
    <variation>L</variation>
    <location>
        <position position="47"/>
    </location>
</feature>
<feature type="sequence variant" id="VAR_014632" description="In dbSNP:rs1800371." evidence="185">
    <original>P</original>
    <variation>S</variation>
    <location>
        <position position="47"/>
    </location>
</feature>
<feature type="sequence variant" id="VAR_044570" description="In a sporadic cancer; somatic mutation.">
    <original>D</original>
    <variation>G</variation>
    <location>
        <position position="48"/>
    </location>
</feature>
<feature type="sequence variant" id="VAR_044571" description="In sporadic cancers; somatic mutation; dbSNP:rs587780728.">
    <original>D</original>
    <variation>H</variation>
    <location>
        <position position="49"/>
    </location>
</feature>
<feature type="sequence variant" id="VAR_044572" description="In a sporadic cancer; somatic mutation; dbSNP:rs587780728.">
    <original>D</original>
    <variation>N</variation>
    <location>
        <position position="49"/>
    </location>
</feature>
<feature type="sequence variant" id="VAR_044573" description="In sporadic cancers; somatic mutation.">
    <original>D</original>
    <variation>Y</variation>
    <location>
        <position position="49"/>
    </location>
</feature>
<feature type="sequence variant" id="VAR_044574" description="In a sporadic cancer; somatic mutation.">
    <original>Q</original>
    <variation>H</variation>
    <location>
        <position position="52"/>
    </location>
</feature>
<feature type="sequence variant" id="VAR_005854" description="In sporadic cancers; somatic mutation.">
    <original>W</original>
    <variation>C</variation>
    <location>
        <position position="53"/>
    </location>
</feature>
<feature type="sequence variant" id="VAR_044575" description="In a sporadic cancer; somatic mutation.">
    <original>W</original>
    <variation>G</variation>
    <location>
        <position position="53"/>
    </location>
</feature>
<feature type="sequence variant" id="VAR_044576" description="In a sporadic cancer; somatic mutation; dbSNP:rs1555526742.">
    <original>F</original>
    <variation>L</variation>
    <location>
        <position position="54"/>
    </location>
</feature>
<feature type="sequence variant" id="VAR_044577" description="In a sporadic cancer; somatic mutation.">
    <original>F</original>
    <variation>Y</variation>
    <location>
        <position position="54"/>
    </location>
</feature>
<feature type="sequence variant" id="VAR_044578" description="In sporadic cancers; somatic mutation.">
    <original>E</original>
    <variation>K</variation>
    <location>
        <position position="56"/>
    </location>
</feature>
<feature type="sequence variant" id="VAR_044579" description="In a sporadic cancer; somatic mutation.">
    <original>E</original>
    <variation>V</variation>
    <location>
        <position position="56"/>
    </location>
</feature>
<feature type="sequence variant" id="VAR_044580" description="In a sporadic cancer; somatic mutation.">
    <original>P</original>
    <variation>Q</variation>
    <location>
        <position position="58"/>
    </location>
</feature>
<feature type="sequence variant" id="VAR_044581" description="In a sporadic cancer; somatic mutation.">
    <original>P</original>
    <variation>T</variation>
    <location>
        <position position="58"/>
    </location>
</feature>
<feature type="sequence variant" id="VAR_044582" description="In sporadic cancers; somatic mutation; dbSNP:rs1237722021.">
    <original>G</original>
    <variation>C</variation>
    <location>
        <position position="59"/>
    </location>
</feature>
<feature type="sequence variant" id="VAR_044583" description="In sporadic cancers; somatic mutation.">
    <original>G</original>
    <variation>D</variation>
    <location>
        <position position="59"/>
    </location>
</feature>
<feature type="sequence variant" id="VAR_045783" description="In a sporadic cancer; somatic mutation; requires 2 nucleotide substitutions.">
    <original>G</original>
    <variation>N</variation>
    <location>
        <position position="59"/>
    </location>
</feature>
<feature type="sequence variant" id="VAR_044584" description="In sporadic cancers; somatic mutation.">
    <original>P</original>
    <variation>L</variation>
    <location>
        <position position="60"/>
    </location>
</feature>
<feature type="sequence variant" id="VAR_044585" description="In a sporadic cancer; somatic mutation.">
    <original>P</original>
    <variation>Q</variation>
    <location>
        <position position="60"/>
    </location>
</feature>
<feature type="sequence variant" id="VAR_005855" description="In a sporadic cancer; somatic mutation.">
    <original>P</original>
    <variation>S</variation>
    <location>
        <position position="60"/>
    </location>
</feature>
<feature type="sequence variant" id="VAR_044586" description="In sporadic cancers; somatic mutation; dbSNP:rs1460793472.">
    <original>D</original>
    <variation>G</variation>
    <location>
        <position position="61"/>
    </location>
</feature>
<feature type="sequence variant" id="VAR_044587" description="In sporadic cancers; somatic mutation.">
    <original>D</original>
    <variation>N</variation>
    <location>
        <position position="61"/>
    </location>
</feature>
<feature type="sequence variant" id="VAR_044588" description="In a sporadic cancer; somatic mutation.">
    <original>E</original>
    <variation>D</variation>
    <location>
        <position position="62"/>
    </location>
</feature>
<feature type="sequence variant" id="VAR_044589" description="In a sporadic cancer; somatic mutation; dbSNP:rs876658902.">
    <original>A</original>
    <variation>T</variation>
    <location>
        <position position="63"/>
    </location>
</feature>
<feature type="sequence variant" id="VAR_044590" description="In a sporadic cancer; somatic mutation; dbSNP:rs372201428.">
    <original>A</original>
    <variation>V</variation>
    <location>
        <position position="63"/>
    </location>
</feature>
<feature type="sequence variant" id="VAR_044591" description="In a sporadic cancer; somatic mutation; dbSNP:rs1060501210.">
    <original>R</original>
    <variation>T</variation>
    <location>
        <position position="65"/>
    </location>
</feature>
<feature type="sequence variant" id="VAR_044592" description="In a sporadic cancer; somatic mutation; dbSNP:rs1555526711.">
    <original>M</original>
    <variation>I</variation>
    <location>
        <position position="66"/>
    </location>
</feature>
<feature type="sequence variant" id="VAR_044593" description="In a sporadic cancer; somatic mutation.">
    <original>M</original>
    <variation>R</variation>
    <location>
        <position position="66"/>
    </location>
</feature>
<feature type="sequence variant" id="VAR_044594" description="In sporadic cancers; somatic mutation.">
    <original>P</original>
    <variation>L</variation>
    <location>
        <position position="67"/>
    </location>
</feature>
<feature type="sequence variant" id="VAR_044595" description="In a sporadic cancer; somatic mutation.">
    <original>P</original>
    <variation>R</variation>
    <location>
        <position position="67"/>
    </location>
</feature>
<feature type="sequence variant" id="VAR_044596" description="In sporadic cancers; somatic mutation.">
    <original>P</original>
    <variation>S</variation>
    <location>
        <position position="67"/>
    </location>
</feature>
<feature type="sequence variant" id="VAR_044597" description="In sporadic cancers; somatic mutation.">
    <original>E</original>
    <variation>G</variation>
    <location>
        <position position="68"/>
    </location>
</feature>
<feature type="sequence variant" id="VAR_044598" description="In a sporadic cancer; somatic mutation.">
    <original>E</original>
    <variation>Q</variation>
    <location>
        <position position="68"/>
    </location>
</feature>
<feature type="sequence variant" id="VAR_044599" description="In a sporadic cancer; somatic mutation.">
    <original>A</original>
    <variation>D</variation>
    <location>
        <position position="69"/>
    </location>
</feature>
<feature type="sequence variant" id="VAR_044600" description="In sporadic cancers; somatic mutation; dbSNP:rs756233241.">
    <original>A</original>
    <variation>G</variation>
    <location>
        <position position="69"/>
    </location>
</feature>
<feature type="sequence variant" id="VAR_044601" description="In a sporadic cancer; somatic mutation.">
    <original>A</original>
    <variation>T</variation>
    <location>
        <position position="69"/>
    </location>
</feature>
<feature type="sequence variant" id="VAR_044602" description="In a sporadic cancer; somatic mutation; dbSNP:rs756233241.">
    <original>A</original>
    <variation>V</variation>
    <location>
        <position position="69"/>
    </location>
</feature>
<feature type="sequence variant" id="VAR_044603" description="In a sporadic cancer; somatic mutation.">
    <original>A</original>
    <variation>T</variation>
    <location>
        <position position="70"/>
    </location>
</feature>
<feature type="sequence variant" id="VAR_044604" description="In a sporadic cancer; somatic mutation.">
    <original>P</original>
    <variation>T</variation>
    <location>
        <position position="71"/>
    </location>
</feature>
<feature type="sequence variant" id="VAR_045784" description="In sporadic cancers; somatic mutation; requires 2 nucleotide substitutions; dbSNP:rs730882014.">
    <original>P</original>
    <variation>C</variation>
    <location>
        <position position="72"/>
    </location>
</feature>
<feature type="sequence variant" id="VAR_045785" description="In sporadic cancers; somatic mutation; requires 2 nucleotide substitutions.">
    <original>P</original>
    <variation>G</variation>
    <location>
        <position position="72"/>
    </location>
</feature>
<feature type="sequence variant" id="VAR_045786" description="In sporadic cancers; somatic mutation; dbSNP:rs1042522.">
    <original>P</original>
    <variation>H</variation>
    <location>
        <position position="72"/>
    </location>
</feature>
<feature type="sequence variant" id="VAR_045787" description="In a sporadic cancer; somatic mutation.">
    <original>P</original>
    <variation>L</variation>
    <location>
        <position position="72"/>
    </location>
</feature>
<feature type="sequence variant" id="VAR_005856" description="In dbSNP:rs1042522." evidence="36 52 111 187">
    <original>P</original>
    <variation>R</variation>
    <location>
        <position position="72"/>
    </location>
</feature>
<feature type="sequence variant" id="VAR_044605" description="In a sporadic cancer; somatic mutation.">
    <original>V</original>
    <variation>E</variation>
    <location>
        <position position="73"/>
    </location>
</feature>
<feature type="sequence variant" id="VAR_044606" description="In sporadic cancers; somatic mutation.">
    <original>V</original>
    <variation>L</variation>
    <location>
        <position position="73"/>
    </location>
</feature>
<feature type="sequence variant" id="VAR_044607" description="In sporadic cancers; somatic mutation; dbSNP:rs587782423.">
    <original>V</original>
    <variation>M</variation>
    <location>
        <position position="73"/>
    </location>
</feature>
<feature type="sequence variant" id="VAR_044608" description="In a sporadic cancer; somatic mutation.">
    <original>A</original>
    <variation>T</variation>
    <location>
        <position position="74"/>
    </location>
</feature>
<feature type="sequence variant" id="VAR_044609" description="In sporadic cancers; somatic mutation.">
    <original>P</original>
    <variation>L</variation>
    <location>
        <position position="75"/>
    </location>
</feature>
<feature type="sequence variant" id="VAR_044610" description="In sporadic cancers; somatic mutation.">
    <original>P</original>
    <variation>R</variation>
    <location>
        <position position="75"/>
    </location>
</feature>
<feature type="sequence variant" id="VAR_044611" description="In a sporadic cancer; somatic mutation.">
    <original>P</original>
    <variation>S</variation>
    <location>
        <position position="75"/>
    </location>
</feature>
<feature type="sequence variant" id="VAR_044612" description="In a sporadic cancer; somatic mutation." evidence="156">
    <original>A</original>
    <variation>G</variation>
    <location>
        <position position="76"/>
    </location>
</feature>
<feature type="sequence variant" id="VAR_044613" description="In a sporadic cancer; somatic mutation.">
    <original>A</original>
    <variation>T</variation>
    <location>
        <position position="76"/>
    </location>
</feature>
<feature type="sequence variant" id="VAR_044614" description="In sporadic cancers; somatic mutation.">
    <original>P</original>
    <variation>A</variation>
    <location>
        <position position="77"/>
    </location>
</feature>
<feature type="sequence variant" id="VAR_044615" description="In sporadic cancers; somatic mutation.">
    <original>A</original>
    <variation>V</variation>
    <location>
        <position position="78"/>
    </location>
</feature>
<feature type="sequence variant" id="VAR_044616" description="In a sporadic cancer; somatic mutation.">
    <original>A</original>
    <variation>G</variation>
    <location>
        <position position="79"/>
    </location>
</feature>
<feature type="sequence variant" id="VAR_005857" description="In a sporadic cancer; somatic mutation.">
    <original>A</original>
    <variation>T</variation>
    <location>
        <position position="79"/>
    </location>
</feature>
<feature type="sequence variant" id="VAR_044617" description="In sporadic cancers; somatic mutation.">
    <original>A</original>
    <variation>V</variation>
    <location>
        <position position="79"/>
    </location>
</feature>
<feature type="sequence variant" id="VAR_044618" description="In a sporadic cancer; somatic mutation.">
    <original>P</original>
    <variation>L</variation>
    <location>
        <position position="80"/>
    </location>
</feature>
<feature type="sequence variant" id="VAR_044619" description="In a sporadic cancer; somatic mutation; dbSNP:rs1060501204.">
    <original>P</original>
    <variation>S</variation>
    <location>
        <position position="80"/>
    </location>
</feature>
<feature type="sequence variant" id="VAR_044620" description="In sporadic cancers; somatic mutation.">
    <original>T</original>
    <variation>I</variation>
    <location>
        <position position="81"/>
    </location>
</feature>
<feature type="sequence variant" id="VAR_044621" description="In LFS; germline mutation and in sporadic cancers; somatic mutation; dbSNP:rs534447939.">
    <original>P</original>
    <variation>L</variation>
    <location>
        <position position="82"/>
    </location>
</feature>
<feature type="sequence variant" id="VAR_044622" description="In sporadic cancers; somatic mutation.">
    <original>P</original>
    <variation>S</variation>
    <location>
        <position position="82"/>
    </location>
</feature>
<feature type="sequence variant" id="VAR_044623" description="In a sporadic cancer; somatic mutation; dbSNP:rs201717599.">
    <original>A</original>
    <variation>E</variation>
    <location>
        <position position="83"/>
    </location>
</feature>
<feature type="sequence variant" id="VAR_044624" description="In sporadic cancers; somatic mutation; dbSNP:rs201717599.">
    <original>A</original>
    <variation>V</variation>
    <location>
        <position position="83"/>
    </location>
</feature>
<feature type="sequence variant" id="VAR_044625" description="In sporadic cancers; somatic mutation.">
    <original>A</original>
    <variation>G</variation>
    <location>
        <position position="84"/>
    </location>
</feature>
<feature type="sequence variant" id="VAR_044626" description="In sporadic cancers; somatic mutation.">
    <original>A</original>
    <variation>V</variation>
    <location>
        <position position="84"/>
    </location>
</feature>
<feature type="sequence variant" id="VAR_044627" description="In sporadic cancers; somatic mutation.">
    <original>P</original>
    <variation>L</variation>
    <location>
        <position position="85"/>
    </location>
</feature>
<feature type="sequence variant" id="VAR_044628" description="In sporadic cancers; somatic mutation.">
    <original>P</original>
    <variation>S</variation>
    <location>
        <position position="85"/>
    </location>
</feature>
<feature type="sequence variant" id="VAR_044629" description="In a sporadic cancer; somatic mutation.">
    <original>A</original>
    <variation>V</variation>
    <location>
        <position position="86"/>
    </location>
</feature>
<feature type="sequence variant" id="VAR_005858" description="In sporadic cancers; somatic mutation.">
    <original>P</original>
    <variation>Q</variation>
    <location>
        <position position="87"/>
    </location>
</feature>
<feature type="sequence variant" id="VAR_044630" description="In a sporadic cancer; somatic mutation.">
    <original>A</original>
    <variation>T</variation>
    <location>
        <position position="88"/>
    </location>
</feature>
<feature type="sequence variant" id="VAR_044631" description="In sporadic cancers; somatic mutation; dbSNP:rs1555526631.">
    <original>A</original>
    <variation>V</variation>
    <location>
        <position position="88"/>
    </location>
</feature>
<feature type="sequence variant" id="VAR_044632" description="In sporadic cancers; somatic mutation; dbSNP:rs730881994.">
    <original>P</original>
    <variation>L</variation>
    <location>
        <position position="89"/>
    </location>
</feature>
<feature type="sequence variant" id="VAR_044633" description="In sporadic cancers; somatic mutation.">
    <original>P</original>
    <variation>S</variation>
    <location>
        <position position="89"/>
    </location>
</feature>
<feature type="sequence variant" id="VAR_044634" description="In sporadic cancers; somatic mutation; dbSNP:rs1555526625.">
    <original>S</original>
    <variation>F</variation>
    <location>
        <position position="90"/>
    </location>
</feature>
<feature type="sequence variant" id="VAR_044635" description="In a sporadic cancer; somatic mutation.">
    <original>S</original>
    <variation>Y</variation>
    <location>
        <position position="90"/>
    </location>
</feature>
<feature type="sequence variant" id="VAR_044636" description="In a sporadic cancer; somatic mutation.">
    <original>W</original>
    <variation>C</variation>
    <location>
        <position position="91"/>
    </location>
</feature>
<feature type="sequence variant" id="VAR_044637" description="In a sporadic cancer; somatic mutation.">
    <original>P</original>
    <variation>A</variation>
    <location>
        <position position="92"/>
    </location>
</feature>
<feature type="sequence variant" id="VAR_044638" description="In a sporadic cancer; somatic mutation; dbSNP:rs1210700121.">
    <original>P</original>
    <variation>L</variation>
    <location>
        <position position="92"/>
    </location>
</feature>
<feature type="sequence variant" id="VAR_044639" description="In a sporadic cancer; somatic mutation.">
    <original>P</original>
    <variation>S</variation>
    <location>
        <position position="92"/>
    </location>
</feature>
<feature type="sequence variant" id="VAR_044640" description="In a sporadic cancer; somatic mutation.">
    <original>L</original>
    <variation>M</variation>
    <location>
        <position position="93"/>
    </location>
</feature>
<feature type="sequence variant" id="VAR_044641" description="In a sporadic cancer; somatic mutation.">
    <original>L</original>
    <variation>P</variation>
    <location>
        <position position="93"/>
    </location>
</feature>
<feature type="sequence variant" id="VAR_044642" description="In sporadic cancers; somatic mutation.">
    <original>S</original>
    <variation>L</variation>
    <location>
        <position position="94"/>
    </location>
</feature>
<feature type="sequence variant" id="VAR_005859" description="In sporadic cancers; somatic mutation.">
    <original>S</original>
    <variation>T</variation>
    <location>
        <position position="94"/>
    </location>
</feature>
<feature type="sequence variant" id="VAR_044643" description="In sporadic cancers; somatic mutation.">
    <original>S</original>
    <variation>F</variation>
    <location>
        <position position="95"/>
    </location>
</feature>
<feature type="sequence variant" id="VAR_044644" description="In a sporadic cancer; somatic mutation.">
    <original>S</original>
    <variation>T</variation>
    <location>
        <position position="95"/>
    </location>
</feature>
<feature type="sequence variant" id="VAR_044645" description="In a sporadic cancer; somatic mutation.">
    <original>S</original>
    <variation>C</variation>
    <location>
        <position position="96"/>
    </location>
</feature>
<feature type="sequence variant" id="VAR_044646" description="In sporadic cancers; somatic mutation.">
    <original>S</original>
    <variation>F</variation>
    <location>
        <position position="96"/>
    </location>
</feature>
<feature type="sequence variant" id="VAR_044647" description="In a sporadic cancer; somatic mutation.">
    <original>S</original>
    <variation>P</variation>
    <location>
        <position position="96"/>
    </location>
</feature>
<feature type="sequence variant" id="VAR_044648" description="In a sporadic cancer; somatic mutation.">
    <original>V</original>
    <variation>A</variation>
    <location>
        <position position="97"/>
    </location>
</feature>
<feature type="sequence variant" id="VAR_044649" description="In a sporadic cancer; somatic mutation.">
    <original>V</original>
    <variation>F</variation>
    <location>
        <position position="97"/>
    </location>
</feature>
<feature type="sequence variant" id="VAR_044650" description="In familial cancer not matching LFS; germline mutation and in a sporadic cancer; somatic mutation; dbSNP:rs730882023.">
    <original>V</original>
    <variation>I</variation>
    <location>
        <position position="97"/>
    </location>
</feature>
<feature type="sequence variant" id="VAR_044651" description="In sporadic cancers; somatic mutation; dbSNP:rs1245723119.">
    <original>P</original>
    <variation>L</variation>
    <location>
        <position position="98"/>
    </location>
</feature>
<feature type="sequence variant" id="VAR_044652" description="In sporadic cancers; somatic mutation.">
    <original>P</original>
    <variation>S</variation>
    <location>
        <position position="98"/>
    </location>
</feature>
<feature type="sequence variant" id="VAR_044653" description="In sporadic cancers; somatic mutation.">
    <original>S</original>
    <variation>F</variation>
    <location>
        <position position="99"/>
    </location>
</feature>
<feature type="sequence variant" id="VAR_044654" description="In a sporadic cancer; somatic mutation.">
    <original>S</original>
    <variation>P</variation>
    <location>
        <position position="99"/>
    </location>
</feature>
<feature type="sequence variant" id="VAR_044655" description="In a sporadic cancer; somatic mutation.">
    <original>Q</original>
    <variation>R</variation>
    <location>
        <position position="100"/>
    </location>
</feature>
<feature type="sequence variant" id="VAR_044656" description="In a sporadic cancer; somatic mutation; dbSNP:rs878854069.">
    <original>K</original>
    <variation>N</variation>
    <location>
        <position position="101"/>
    </location>
</feature>
<feature type="sequence variant" id="VAR_044657" description="In sporadic cancers; somatic mutation.">
    <original>K</original>
    <variation>R</variation>
    <location>
        <position position="101"/>
    </location>
</feature>
<feature type="sequence variant" id="VAR_044658" description="In sporadic cancers; somatic mutation; dbSNP:rs786202717.">
    <original>T</original>
    <variation>I</variation>
    <location>
        <position position="102"/>
    </location>
</feature>
<feature type="sequence variant" id="VAR_044659" description="In sporadic cancers; somatic mutation.">
    <original>Q</original>
    <variation>H</variation>
    <location>
        <position position="104"/>
    </location>
</feature>
<feature type="sequence variant" id="VAR_044660" description="In a sporadic cancer; somatic mutation.">
    <original>Q</original>
    <variation>L</variation>
    <location>
        <position position="104"/>
    </location>
</feature>
<feature type="sequence variant" id="VAR_044661" description="In LFS; germline mutation and in sporadic cancers; somatic mutation.">
    <original>G</original>
    <variation>C</variation>
    <location>
        <position position="105"/>
    </location>
</feature>
<feature type="sequence variant" id="VAR_044662" description="In sporadic cancers; somatic mutation; dbSNP:rs587781504.">
    <original>G</original>
    <variation>D</variation>
    <location>
        <position position="105"/>
    </location>
</feature>
<feature type="sequence variant" id="VAR_044663" description="In sporadic cancers; somatic mutation; dbSNP:rs1060501195.">
    <original>G</original>
    <variation>R</variation>
    <location>
        <position position="105"/>
    </location>
</feature>
<feature type="sequence variant" id="VAR_044664" description="In a sporadic cancer; somatic mutation; dbSNP:rs1060501195.">
    <original>G</original>
    <variation>S</variation>
    <location>
        <position position="105"/>
    </location>
</feature>
<feature type="sequence variant" id="VAR_044665" description="In sporadic cancers; somatic mutation.">
    <original>G</original>
    <variation>V</variation>
    <location>
        <position position="105"/>
    </location>
</feature>
<feature type="sequence variant" id="VAR_044666" description="In a sporadic cancer; somatic mutation.">
    <original>S</original>
    <variation>G</variation>
    <location>
        <position position="106"/>
    </location>
</feature>
<feature type="sequence variant" id="VAR_044667" description="In a familial cancer not matching LFS; germline mutation and in sporadic cancers; somatic mutation; dbSNP:rs1555526581.">
    <original>S</original>
    <variation>R</variation>
    <location>
        <position position="106"/>
    </location>
</feature>
<feature type="sequence variant" id="VAR_044668" description="In a sporadic cancer; somatic mutation; dbSNP:rs587782447.">
    <original>Y</original>
    <variation>C</variation>
    <location>
        <position position="107"/>
    </location>
</feature>
<feature type="sequence variant" id="VAR_044669" description="In sporadic cancers; somatic mutation.">
    <original>Y</original>
    <variation>D</variation>
    <location>
        <position position="107"/>
    </location>
</feature>
<feature type="sequence variant" id="VAR_044670" description="In a sporadic cancer; somatic mutation; dbSNP:rs368771578.">
    <original>Y</original>
    <variation>H</variation>
    <location>
        <position position="107"/>
    </location>
</feature>
<feature type="sequence variant" id="VAR_044671" description="In a sporadic cancer; somatic mutation.">
    <original>G</original>
    <variation>D</variation>
    <location>
        <position position="108"/>
    </location>
</feature>
<feature type="sequence variant" id="VAR_044672" description="In sporadic cancers; somatic mutation; dbSNP:rs587782461.">
    <original>G</original>
    <variation>S</variation>
    <location>
        <position position="108"/>
    </location>
</feature>
<feature type="sequence variant" id="VAR_044673" description="In sporadic cancers; somatic mutation.">
    <original>F</original>
    <variation>C</variation>
    <location>
        <position position="109"/>
    </location>
</feature>
<feature type="sequence variant" id="VAR_044674" description="In a sporadic cancer; somatic mutation.">
    <original>F</original>
    <variation>L</variation>
    <location>
        <position position="109"/>
    </location>
</feature>
<feature type="sequence variant" id="VAR_044675" description="In sporadic cancers; somatic mutation; dbSNP:rs1064796722.">
    <original>F</original>
    <variation>S</variation>
    <location>
        <position position="109"/>
    </location>
</feature>
<feature type="sequence variant" id="VAR_005860" description="In sporadic cancers; somatic mutation; dbSNP:rs587781371.">
    <original>R</original>
    <variation>C</variation>
    <location>
        <position position="110"/>
    </location>
</feature>
<feature type="sequence variant" id="VAR_044676" description="In a sporadic cancer; somatic mutation.">
    <original>R</original>
    <variation>G</variation>
    <location>
        <position position="110"/>
    </location>
</feature>
<feature type="sequence variant" id="VAR_044677" description="In sporadic cancers; somatic mutation; dbSNP:rs11540654.">
    <original>R</original>
    <variation>H</variation>
    <location>
        <position position="110"/>
    </location>
</feature>
<feature type="sequence variant" id="VAR_005861" description="In a familial cancer not matching LFS; germline mutation and in sporadic cancers; somatic mutation; does not induce SNAI1 degradation; dbSNP:rs11540654." evidence="121">
    <original>R</original>
    <variation>L</variation>
    <location>
        <position position="110"/>
    </location>
</feature>
<feature type="sequence variant" id="VAR_005862" description="In sporadic cancers; somatic mutation; dbSNP:rs11540654." evidence="75">
    <original>R</original>
    <variation>P</variation>
    <location>
        <position position="110"/>
    </location>
</feature>
<feature type="sequence variant" id="VAR_044678" description="In a sporadic cancer; somatic mutation; dbSNP:rs587781371.">
    <original>R</original>
    <variation>S</variation>
    <location>
        <position position="110"/>
    </location>
</feature>
<feature type="sequence variant" id="VAR_044679" description="In a sporadic cancer; somatic mutation.">
    <original>L</original>
    <variation>M</variation>
    <location>
        <position position="111"/>
    </location>
</feature>
<feature type="sequence variant" id="VAR_044680" description="In sporadic cancers; somatic mutation; dbSNP:rs1057519997.">
    <original>L</original>
    <variation>P</variation>
    <location>
        <position position="111"/>
    </location>
</feature>
<feature type="sequence variant" id="VAR_044681" description="In sporadic cancers; somatic mutation; dbSNP:rs1057519997.">
    <original>L</original>
    <variation>Q</variation>
    <location>
        <position position="111"/>
    </location>
</feature>
<feature type="sequence variant" id="VAR_044682" description="In sporadic cancers; somatic mutation; dbSNP:rs1057519997.">
    <original>L</original>
    <variation>R</variation>
    <location>
        <position position="111"/>
    </location>
</feature>
<feature type="sequence variant" id="VAR_044683" description="In sporadic cancers; somatic mutation.">
    <original>G</original>
    <variation>D</variation>
    <location>
        <position position="112"/>
    </location>
</feature>
<feature type="sequence variant" id="VAR_044684" description="In sporadic cancers; somatic mutation; dbSNP:rs1423803759.">
    <original>G</original>
    <variation>S</variation>
    <location>
        <position position="112"/>
    </location>
</feature>
<feature type="sequence variant" id="VAR_005863" description="In sporadic cancers; somatic mutation.">
    <original>F</original>
    <variation>C</variation>
    <location>
        <position position="113"/>
    </location>
</feature>
<feature type="sequence variant" id="VAR_045788" description="In a sporadic cancer; somatic mutation; requires 2 nucleotide substitutions.">
    <original>F</original>
    <variation>G</variation>
    <location>
        <position position="113"/>
    </location>
</feature>
<feature type="sequence variant" id="VAR_044685" description="In a sporadic cancer; somatic mutation.">
    <original>F</original>
    <variation>I</variation>
    <location>
        <position position="113"/>
    </location>
</feature>
<feature type="sequence variant" id="VAR_044686" description="In sporadic cancers; somatic mutation.">
    <original>F</original>
    <variation>L</variation>
    <location>
        <position position="113"/>
    </location>
</feature>
<feature type="sequence variant" id="VAR_044687" description="In sporadic cancers; somatic mutation.">
    <original>F</original>
    <variation>S</variation>
    <location>
        <position position="113"/>
    </location>
</feature>
<feature type="sequence variant" id="VAR_033033" description="In sporadic cancers; somatic mutation; dbSNP:rs587781642." evidence="75">
    <original>F</original>
    <variation>V</variation>
    <location>
        <position position="113"/>
    </location>
</feature>
<feature type="sequence variant" id="VAR_044688" description="In sporadic cancers; somatic mutation.">
    <original>H</original>
    <variation>Y</variation>
    <location>
        <position position="115"/>
    </location>
</feature>
<feature type="sequence variant" id="VAR_044689" description="In sporadic cancers; somatic mutation.">
    <original>S</original>
    <variation>C</variation>
    <location>
        <position position="116"/>
    </location>
</feature>
<feature type="sequence variant" id="VAR_044690" description="In a sporadic cancer; somatic mutation.">
    <original>S</original>
    <variation>F</variation>
    <location>
        <position position="116"/>
    </location>
</feature>
<feature type="sequence variant" id="VAR_044691" description="In a sporadic cancer; somatic mutation.">
    <original>S</original>
    <variation>P</variation>
    <location>
        <position position="116"/>
    </location>
</feature>
<feature type="sequence variant" id="VAR_044692" description="In sporadic cancers; somatic mutation; dbSNP:rs755238756.">
    <original>G</original>
    <variation>E</variation>
    <location>
        <position position="117"/>
    </location>
</feature>
<feature type="sequence variant" id="VAR_044693" description="In sporadic cancers; somatic mutation; dbSNP:rs1555526518.">
    <original>G</original>
    <variation>R</variation>
    <location>
        <position position="117"/>
    </location>
</feature>
<feature type="sequence variant" id="VAR_044694" description="In a sporadic cancer; somatic mutation.">
    <original>T</original>
    <variation>A</variation>
    <location>
        <position position="118"/>
    </location>
</feature>
<feature type="sequence variant" id="VAR_044695" description="In sporadic cancers; somatic mutation; dbSNP:rs1064794141.">
    <original>T</original>
    <variation>I</variation>
    <location>
        <position position="118"/>
    </location>
</feature>
<feature type="sequence variant" id="VAR_044696" description="In a sporadic cancer; somatic mutation.">
    <original>T</original>
    <variation>R</variation>
    <location>
        <position position="118"/>
    </location>
</feature>
<feature type="sequence variant" id="VAR_044697" description="In a sporadic cancer; somatic mutation.">
    <original>A</original>
    <variation>D</variation>
    <location>
        <position position="119"/>
    </location>
</feature>
<feature type="sequence variant" id="VAR_044698" description="In a sporadic cancer; somatic mutation.">
    <original>A</original>
    <variation>T</variation>
    <location>
        <position position="119"/>
    </location>
</feature>
<feature type="sequence variant" id="VAR_044699" description="In sporadic cancers; somatic mutation; abolished acetylation; impaired ability to induce proapoptotic program; mimics lactylation, leading to decreased ability to undergo liquid-liquid phase separation and activate the transcription factor activity; dbSNP:rs121912658." evidence="74 170">
    <original>K</original>
    <variation>E</variation>
    <location>
        <position position="120"/>
    </location>
</feature>
<feature type="sequence variant" id="VAR_044700" description="In sporadic cancers; somatic mutation." evidence="74">
    <original>K</original>
    <variation>M</variation>
    <location>
        <position position="120"/>
    </location>
</feature>
<feature type="sequence variant" id="VAR_044701" description="In a sporadic cancer; somatic mutation; mimics lactylation, leading to decreased ability to undergo liquid-liquid phase separation and activate the transcription factor activity; dbSNP:rs121912658." evidence="170">
    <original>K</original>
    <variation>Q</variation>
    <location>
        <position position="120"/>
    </location>
</feature>
<feature type="sequence variant" id="VAR_044702" description="In sporadic cancers; somatic mutation." evidence="74">
    <original>K</original>
    <variation>R</variation>
    <location>
        <position position="120"/>
    </location>
</feature>
<feature type="sequence variant" id="VAR_044703" description="In sporadic cancers; somatic mutation.">
    <original>S</original>
    <variation>F</variation>
    <location>
        <position position="121"/>
    </location>
</feature>
<feature type="sequence variant" id="VAR_044704" description="In a sporadic cancer; somatic mutation.">
    <original>V</original>
    <variation>L</variation>
    <location>
        <position position="122"/>
    </location>
</feature>
<feature type="sequence variant" id="VAR_044705" description="In a sporadic cancer; somatic mutation; dbSNP:rs1555526486.">
    <original>T</original>
    <variation>I</variation>
    <location>
        <position position="123"/>
    </location>
</feature>
<feature type="sequence variant" id="VAR_044706" description="In a sporadic cancer; somatic mutation.">
    <original>T</original>
    <variation>N</variation>
    <location>
        <position position="123"/>
    </location>
</feature>
<feature type="sequence variant" id="VAR_044707" description="In a sporadic cancer; somatic mutation; dbSNP:rs730881997.">
    <original>C</original>
    <variation>G</variation>
    <location>
        <position position="124"/>
    </location>
</feature>
<feature type="sequence variant" id="VAR_044708" description="In sporadic cancers; somatic mutation.">
    <original>C</original>
    <variation>R</variation>
    <location>
        <position position="124"/>
    </location>
</feature>
<feature type="sequence variant" id="VAR_044709" description="In sporadic cancers; somatic mutation; dbSNP:rs730881997.">
    <original>C</original>
    <variation>S</variation>
    <location>
        <position position="124"/>
    </location>
</feature>
<feature type="sequence variant" id="VAR_044710" description="In a sporadic cancer; somatic mutation.">
    <original>C</original>
    <variation>W</variation>
    <location>
        <position position="124"/>
    </location>
</feature>
<feature type="sequence variant" id="VAR_044711" description="In a sporadic cancer; somatic mutation.">
    <original>C</original>
    <variation>Y</variation>
    <location>
        <position position="124"/>
    </location>
</feature>
<feature type="sequence variant" id="VAR_044712" description="In a sporadic cancer; somatic mutation.">
    <original>T</original>
    <variation>A</variation>
    <location>
        <position position="125"/>
    </location>
</feature>
<feature type="sequence variant" id="VAR_044713" description="In sporadic cancers; somatic mutation; dbSNP:rs786201057.">
    <original>T</original>
    <variation>K</variation>
    <location>
        <position position="125"/>
    </location>
</feature>
<feature type="sequence variant" id="VAR_005864" description="In sporadic cancers; somatic mutation; dbSNP:rs786201057.">
    <original>T</original>
    <variation>M</variation>
    <location>
        <position position="125"/>
    </location>
</feature>
<feature type="sequence variant" id="VAR_044714" description="In a sporadic cancer; somatic mutation; dbSNP:rs1057520003.">
    <original>T</original>
    <variation>P</variation>
    <location>
        <position position="125"/>
    </location>
</feature>
<feature type="sequence variant" id="VAR_044715" description="In sporadic cancers; somatic mutation; dbSNP:rs786201057.">
    <original>T</original>
    <variation>R</variation>
    <location>
        <position position="125"/>
    </location>
</feature>
<feature type="sequence variant" id="VAR_044716" description="In a familial cancer not matching LFS; germline mutation and in sporadic cancers; somatic mutation; dbSNP:rs1555526335.">
    <original>Y</original>
    <variation>C</variation>
    <location>
        <position position="126"/>
    </location>
</feature>
<feature type="sequence variant" id="VAR_005865" description="In sporadic cancers; somatic mutation; dbSNP:rs886039483.">
    <original>Y</original>
    <variation>D</variation>
    <location>
        <position position="126"/>
    </location>
</feature>
<feature type="sequence variant" id="VAR_044717" description="In a sporadic cancer; somatic mutation.">
    <original>Y</original>
    <variation>F</variation>
    <location>
        <position position="126"/>
    </location>
</feature>
<feature type="sequence variant" id="VAR_045789" description="In a sporadic cancer; somatic mutation; requires 2 nucleotide substitutions.">
    <original>Y</original>
    <variation>G</variation>
    <location>
        <position position="126"/>
    </location>
</feature>
<feature type="sequence variant" id="VAR_044718" description="In sporadic cancers; somatic mutation.">
    <original>Y</original>
    <variation>H</variation>
    <location>
        <position position="126"/>
    </location>
</feature>
<feature type="sequence variant" id="VAR_005866" description="In sporadic cancers; somatic mutation; dbSNP:rs886039483.">
    <original>Y</original>
    <variation>N</variation>
    <location>
        <position position="126"/>
    </location>
</feature>
<feature type="sequence variant" id="VAR_044719" description="In sporadic cancers; somatic mutation.">
    <original>Y</original>
    <variation>S</variation>
    <location>
        <position position="126"/>
    </location>
</feature>
<feature type="sequence variant" id="VAR_044720" description="In a sporadic cancer; somatic mutation; dbSNP:rs730881999.">
    <original>S</original>
    <variation>C</variation>
    <location>
        <position position="127"/>
    </location>
</feature>
<feature type="sequence variant" id="VAR_005867" description="In sporadic cancers; somatic mutation; dbSNP:rs730881999.">
    <original>S</original>
    <variation>F</variation>
    <location>
        <position position="127"/>
    </location>
</feature>
<feature type="sequence variant" id="VAR_044721" description="In sporadic cancers; somatic mutation.">
    <original>S</original>
    <variation>P</variation>
    <location>
        <position position="127"/>
    </location>
</feature>
<feature type="sequence variant" id="VAR_044722" description="In sporadic cancers; somatic mutation.">
    <original>S</original>
    <variation>T</variation>
    <location>
        <position position="127"/>
    </location>
</feature>
<feature type="sequence variant" id="VAR_044723" description="In sporadic cancers; somatic mutation.">
    <original>S</original>
    <variation>Y</variation>
    <location>
        <position position="127"/>
    </location>
</feature>
<feature type="sequence variant" id="VAR_044724" description="In sporadic cancers; somatic mutation.">
    <original>P</original>
    <variation>A</variation>
    <location>
        <position position="128"/>
    </location>
</feature>
<feature type="sequence variant" id="VAR_044725" description="In sporadic cancers; somatic mutation.">
    <original>P</original>
    <variation>L</variation>
    <location>
        <position position="128"/>
    </location>
</feature>
<feature type="sequence variant" id="VAR_044726" description="In sporadic cancers; somatic mutation.">
    <original>P</original>
    <variation>R</variation>
    <location>
        <position position="128"/>
    </location>
</feature>
<feature type="sequence variant" id="VAR_005868" description="In sporadic cancers; somatic mutation.">
    <original>P</original>
    <variation>S</variation>
    <location>
        <position position="128"/>
    </location>
</feature>
<feature type="sequence variant" id="VAR_005869" description="In sporadic cancers; somatic mutation.">
    <original>A</original>
    <variation>D</variation>
    <location>
        <position position="129"/>
    </location>
</feature>
<feature type="sequence variant" id="VAR_044727" description="In a sporadic cancer; somatic mutation.">
    <original>A</original>
    <variation>G</variation>
    <location>
        <position position="129"/>
    </location>
</feature>
<feature type="sequence variant" id="VAR_044728" description="In sporadic cancers; somatic mutation; dbSNP:rs1438095083.">
    <original>A</original>
    <variation>T</variation>
    <location>
        <position position="129"/>
    </location>
</feature>
<feature type="sequence variant" id="VAR_044729" description="In sporadic cancers; somatic mutation; dbSNP:rs137852792.">
    <original>A</original>
    <variation>V</variation>
    <location>
        <position position="129"/>
    </location>
</feature>
<feature type="sequence variant" id="VAR_044730" description="In sporadic cancers; somatic mutation; dbSNP:rs863224683.">
    <original>L</original>
    <variation>F</variation>
    <location>
        <position position="130"/>
    </location>
</feature>
<feature type="sequence variant" id="VAR_044731" description="In sporadic cancers; somatic mutation.">
    <original>L</original>
    <variation>H</variation>
    <location>
        <position position="130"/>
    </location>
</feature>
<feature type="sequence variant" id="VAR_044732" description="In a sporadic cancer; somatic mutation.">
    <original>L</original>
    <variation>I</variation>
    <location>
        <position position="130"/>
    </location>
</feature>
<feature type="sequence variant" id="VAR_044733" description="In sporadic cancers; somatic mutation; dbSNP:rs1131691013.">
    <original>L</original>
    <variation>P</variation>
    <location>
        <position position="130"/>
    </location>
</feature>
<feature type="sequence variant" id="VAR_005870" description="In sporadic cancers; somatic mutation.">
    <original>L</original>
    <variation>R</variation>
    <location>
        <position position="130"/>
    </location>
</feature>
<feature type="sequence variant" id="VAR_044734" description="In sporadic cancers; somatic mutation; dbSNP:rs863224683.">
    <original>L</original>
    <variation>V</variation>
    <location>
        <position position="130"/>
    </location>
</feature>
<feature type="sequence variant" id="VAR_044735" description="In a sporadic cancer; somatic mutation.">
    <original>N</original>
    <variation>D</variation>
    <location>
        <position position="131"/>
    </location>
</feature>
<feature type="sequence variant" id="VAR_044736" description="In sporadic cancers; somatic mutation.">
    <original>N</original>
    <variation>H</variation>
    <location>
        <position position="131"/>
    </location>
</feature>
<feature type="sequence variant" id="VAR_044737" description="In sporadic cancers; somatic mutation; dbSNP:rs1131691037.">
    <original>N</original>
    <variation>I</variation>
    <location>
        <position position="131"/>
    </location>
</feature>
<feature type="sequence variant" id="VAR_005872" description="In sporadic cancers; somatic mutation; dbSNP:rs769270327.">
    <original>N</original>
    <variation>K</variation>
    <location>
        <position position="131"/>
    </location>
</feature>
<feature type="sequence variant" id="VAR_005871" description="In sporadic cancers; somatic mutation.">
    <original>N</original>
    <variation>S</variation>
    <location>
        <position position="131"/>
    </location>
</feature>
<feature type="sequence variant" id="VAR_044738" description="In a sporadic cancer; somatic mutation.">
    <original>N</original>
    <variation>T</variation>
    <location>
        <position position="131"/>
    </location>
</feature>
<feature type="sequence variant" id="VAR_044739" description="In sporadic cancers; somatic mutation; dbSNP:rs587782160.">
    <original>N</original>
    <variation>Y</variation>
    <location>
        <position position="131"/>
    </location>
</feature>
<feature type="sequence variant" id="VAR_047159" description="In a sporadic cancer; somatic mutation.">
    <original>KM</original>
    <variation>NL</variation>
    <location>
        <begin position="132"/>
        <end position="133"/>
    </location>
</feature>
<feature type="sequence variant" id="VAR_044740" description="In LFS; germline mutation and in sporadic cancers; somatic mutation; dbSNP:rs747342068.">
    <original>K</original>
    <variation>E</variation>
    <location>
        <position position="132"/>
    </location>
</feature>
<feature type="sequence variant" id="VAR_045790" description="In a sporadic cancer; somatic mutation; requires 2 nucleotide substitutions.">
    <original>K</original>
    <variation>L</variation>
    <location>
        <position position="132"/>
    </location>
</feature>
<feature type="sequence variant" id="VAR_005873" description="In sporadic cancers; somatic mutation; dbSNP:rs1057519996.">
    <original>K</original>
    <variation>M</variation>
    <location>
        <position position="132"/>
    </location>
</feature>
<feature type="sequence variant" id="VAR_044741" description="In sporadic cancers; somatic mutation; dbSNP:rs866775781.">
    <original>K</original>
    <variation>N</variation>
    <location>
        <position position="132"/>
    </location>
</feature>
<feature type="sequence variant" id="VAR_005874" description="In sporadic cancers; somatic mutation; dbSNP:rs747342068." evidence="64">
    <original>K</original>
    <variation>Q</variation>
    <location>
        <position position="132"/>
    </location>
</feature>
<feature type="sequence variant" id="VAR_044742" description="In sporadic cancers; somatic mutation; dbSNP:rs1057519996.">
    <original>K</original>
    <variation>R</variation>
    <location>
        <position position="132"/>
    </location>
</feature>
<feature type="sequence variant" id="VAR_044743" description="In sporadic cancers; somatic mutation; dbSNP:rs1057519996.">
    <original>K</original>
    <variation>T</variation>
    <location>
        <position position="132"/>
    </location>
</feature>
<feature type="sequence variant" id="VAR_045791" description="In a sporadic cancer; somatic mutation; requires 2 nucleotide substitutions.">
    <original>K</original>
    <variation>W</variation>
    <location>
        <position position="132"/>
    </location>
</feature>
<feature type="sequence variant" id="VAR_044744" description="In sporadic cancers; somatic mutation; dbSNP:rs1064795139.">
    <original>M</original>
    <variation>I</variation>
    <location>
        <position position="133"/>
    </location>
</feature>
<feature type="sequence variant" id="VAR_044745" description="In sporadic cancers; somatic mutation.">
    <original>M</original>
    <variation>K</variation>
    <location>
        <position position="133"/>
    </location>
</feature>
<feature type="sequence variant" id="VAR_044746" description="In sporadic cancers; somatic mutation.">
    <original>M</original>
    <variation>L</variation>
    <location>
        <position position="133"/>
    </location>
</feature>
<feature type="sequence variant" id="VAR_044747" description="In LFS; germline mutation and in sporadic cancers; somatic mutation.">
    <original>M</original>
    <variation>R</variation>
    <location>
        <position position="133"/>
    </location>
</feature>
<feature type="sequence variant" id="VAR_005875" description="In LFS; germline mutation and in sporadic cancers; somatic mutation; dbSNP:rs28934873." evidence="100">
    <original>M</original>
    <variation>T</variation>
    <location>
        <position position="133"/>
    </location>
</feature>
<feature type="sequence variant" id="VAR_044748" description="In sporadic cancers; somatic mutation; dbSNP:rs1057280220.">
    <original>M</original>
    <variation>V</variation>
    <location>
        <position position="133"/>
    </location>
</feature>
<feature type="sequence variant" id="VAR_044749" description="In sporadic cancers; somatic mutation; dbSNP:rs780442292.">
    <original>F</original>
    <variation>C</variation>
    <location>
        <position position="134"/>
    </location>
</feature>
<feature type="sequence variant" id="VAR_044750" description="In sporadic cancers; somatic mutation.">
    <original>F</original>
    <variation>I</variation>
    <location>
        <position position="134"/>
    </location>
</feature>
<feature type="sequence variant" id="VAR_036504" description="In sporadic cancers; somatic mutation; dbSNP:rs267605077." evidence="65">
    <original>F</original>
    <variation>L</variation>
    <location>
        <position position="134"/>
    </location>
</feature>
<feature type="sequence variant" id="VAR_044751" description="In sporadic cancers; somatic mutation.">
    <original>F</original>
    <variation>S</variation>
    <location>
        <position position="134"/>
    </location>
</feature>
<feature type="sequence variant" id="VAR_044752" description="In sporadic cancers; somatic mutation.">
    <original>F</original>
    <variation>V</variation>
    <location>
        <position position="134"/>
    </location>
</feature>
<feature type="sequence variant" id="VAR_005877" description="In sporadic cancers; somatic mutation; dbSNP:rs587781991.">
    <original>C</original>
    <variation>F</variation>
    <location>
        <position position="135"/>
    </location>
</feature>
<feature type="sequence variant" id="VAR_044753" description="In sporadic cancers; somatic mutation; dbSNP:rs1057519975.">
    <original>C</original>
    <variation>G</variation>
    <location>
        <position position="135"/>
    </location>
</feature>
<feature type="sequence variant" id="VAR_044754" description="In sporadic cancers; somatic mutation; dbSNP:rs1057519975.">
    <original>C</original>
    <variation>R</variation>
    <location>
        <position position="135"/>
    </location>
</feature>
<feature type="sequence variant" id="VAR_005876" description="In sporadic cancers; somatic mutation; dbSNP:rs1057519975.">
    <original>C</original>
    <variation>S</variation>
    <location>
        <position position="135"/>
    </location>
</feature>
<feature type="sequence variant" id="VAR_045792" description="In a sporadic cancer; somatic mutation; requires 2 nucleotide substitutions.">
    <original>C</original>
    <variation>T</variation>
    <location>
        <position position="135"/>
    </location>
</feature>
<feature type="sequence variant" id="VAR_044755" description="In sporadic cancers; somatic mutation; dbSNP:rs1057519976.">
    <original>C</original>
    <variation>W</variation>
    <location>
        <position position="135"/>
    </location>
</feature>
<feature type="sequence variant" id="VAR_044756" description="In sporadic cancers; somatic mutation; decreased E6-mediated binding to E6-AP; dbSNP:rs587781991.">
    <original>C</original>
    <variation>Y</variation>
    <location>
        <position position="135"/>
    </location>
</feature>
<feature type="sequence variant" id="VAR_005878" description="In sporadic cancers; somatic mutation; dbSNP:rs1555526268.">
    <original>Q</original>
    <variation>E</variation>
    <location>
        <position position="136"/>
    </location>
</feature>
<feature type="sequence variant" id="VAR_044757" description="In sporadic cancers; somatic mutation; dbSNP:rs758781593.">
    <original>Q</original>
    <variation>H</variation>
    <location>
        <position position="136"/>
    </location>
</feature>
<feature type="sequence variant" id="VAR_005879" description="In a sporadic cancer; somatic mutation.">
    <original>Q</original>
    <variation>K</variation>
    <location>
        <position position="136"/>
    </location>
</feature>
<feature type="sequence variant" id="VAR_044758" description="In sporadic cancers; somatic mutation.">
    <original>Q</original>
    <variation>P</variation>
    <location>
        <position position="136"/>
    </location>
</feature>
<feature type="sequence variant" id="VAR_044759" description="In sporadic cancers; somatic mutation.">
    <original>Q</original>
    <variation>R</variation>
    <location>
        <position position="136"/>
    </location>
</feature>
<feature type="sequence variant" id="VAR_044760" description="In sporadic cancers; somatic mutation.">
    <original>L</original>
    <variation>M</variation>
    <location>
        <position position="137"/>
    </location>
</feature>
<feature type="sequence variant" id="VAR_044761" description="In sporadic cancers; somatic mutation.">
    <original>L</original>
    <variation>P</variation>
    <location>
        <position position="137"/>
    </location>
</feature>
<feature type="sequence variant" id="VAR_005880" description="In sporadic cancers; somatic mutation.">
    <original>L</original>
    <variation>Q</variation>
    <location>
        <position position="137"/>
    </location>
</feature>
<feature type="sequence variant" id="VAR_044762" description="In sporadic cancers; somatic mutation.">
    <original>L</original>
    <variation>V</variation>
    <location>
        <position position="137"/>
    </location>
</feature>
<feature type="sequence variant" id="VAR_044763" description="In sporadic cancers; somatic mutation.">
    <original>A</original>
    <variation>D</variation>
    <location>
        <position position="138"/>
    </location>
</feature>
<feature type="sequence variant" id="VAR_005881" description="In LFS; germline mutation and in sporadic cancers; somatic mutation; dbSNP:rs28934875.">
    <original>A</original>
    <variation>P</variation>
    <location>
        <position position="138"/>
    </location>
</feature>
<feature type="sequence variant" id="VAR_044764" description="In LFS; germline mutation.">
    <original>A</original>
    <variation>S</variation>
    <location>
        <position position="138"/>
    </location>
</feature>
<feature type="sequence variant" id="VAR_044765" description="In sporadic cancers; somatic mutation.">
    <original>A</original>
    <variation>T</variation>
    <location>
        <position position="138"/>
    </location>
</feature>
<feature type="sequence variant" id="VAR_033034" description="In sporadic cancers; somatic mutation; dbSNP:rs750600586." evidence="75 153">
    <original>A</original>
    <variation>V</variation>
    <location>
        <position position="138"/>
    </location>
</feature>
<feature type="sequence variant" id="VAR_044766" description="In sporadic cancers; somatic mutation; mimics lactylation, leading to decreased ability to undergo liquid-liquid phase separation and activate the transcription factor activity; dbSNP:rs1212996409." evidence="170">
    <original>K</original>
    <variation>E</variation>
    <location>
        <position position="139"/>
    </location>
</feature>
<feature type="sequence variant" id="VAR_005882" description="In sporadic cancers; somatic mutation; mimics lactylation, leading to decreased ability to undergo liquid-liquid phase separation and activate the transcription factor activity." evidence="35 170">
    <original>K</original>
    <variation>N</variation>
    <location>
        <position position="139"/>
    </location>
</feature>
<feature type="sequence variant" id="VAR_044767" description="In sporadic cancers; somatic mutation; mimics lactylation, leading to decreased ability to undergo liquid-liquid phase separation and activate the transcription factor activity." evidence="170">
    <original>K</original>
    <variation>Q</variation>
    <location>
        <position position="139"/>
    </location>
</feature>
<feature type="sequence variant" id="VAR_044768" description="In sporadic cancers; somatic mutation.">
    <original>K</original>
    <variation>R</variation>
    <location>
        <position position="139"/>
    </location>
</feature>
<feature type="sequence variant" id="VAR_044769" description="In sporadic cancers; somatic mutation; mimics lactylation, leading to decreased ability to undergo liquid-liquid phase separation and activate the transcription factor activity." evidence="170">
    <original>K</original>
    <variation>T</variation>
    <location>
        <position position="139"/>
    </location>
</feature>
<feature type="sequence variant" id="VAR_044770" description="In sporadic cancers; somatic mutation.">
    <original>T</original>
    <variation>A</variation>
    <location>
        <position position="140"/>
    </location>
</feature>
<feature type="sequence variant" id="VAR_044771" description="In sporadic cancers; somatic mutation.">
    <original>T</original>
    <variation>I</variation>
    <location>
        <position position="140"/>
    </location>
</feature>
<feature type="sequence variant" id="VAR_044772" description="In a sporadic cancer; somatic mutation; dbSNP:rs786202561.">
    <original>T</original>
    <variation>N</variation>
    <location>
        <position position="140"/>
    </location>
</feature>
<feature type="sequence variant" id="VAR_044773" description="In a sporadic cancer; somatic mutation.">
    <original>T</original>
    <variation>P</variation>
    <location>
        <position position="140"/>
    </location>
</feature>
<feature type="sequence variant" id="VAR_044774" description="In sporadic cancers; somatic mutation.">
    <original>T</original>
    <variation>S</variation>
    <location>
        <position position="140"/>
    </location>
</feature>
<feature type="sequence variant" id="VAR_045793" description="In a sporadic cancer; somatic mutation; requires 2 nucleotide substitutions.">
    <original>C</original>
    <variation>A</variation>
    <location>
        <position position="141"/>
    </location>
</feature>
<feature type="sequence variant" id="VAR_005885" description="In sporadic cancers; somatic mutation; dbSNP:rs587781288.">
    <original>C</original>
    <variation>F</variation>
    <location>
        <position position="141"/>
    </location>
</feature>
<feature type="sequence variant" id="VAR_005884" description="In sporadic cancers; somatic mutation; dbSNP:rs1057519978.">
    <original>C</original>
    <variation>G</variation>
    <location>
        <position position="141"/>
    </location>
</feature>
<feature type="sequence variant" id="VAR_044775" description="In sporadic cancers; somatic mutation; dbSNP:rs1057519978.">
    <original>C</original>
    <variation>R</variation>
    <location>
        <position position="141"/>
    </location>
</feature>
<feature type="sequence variant" id="VAR_044776" description="In sporadic cancers; somatic mutation; dbSNP:rs1057519978.">
    <original>C</original>
    <variation>S</variation>
    <location>
        <position position="141"/>
    </location>
</feature>
<feature type="sequence variant" id="VAR_044777" description="In sporadic cancers; somatic mutation; dbSNP:rs1057519977.">
    <original>C</original>
    <variation>W</variation>
    <location>
        <position position="141"/>
    </location>
</feature>
<feature type="sequence variant" id="VAR_005886" description="In LFS; germline mutation and in sporadic cancers; somatic mutation; dbSNP:rs587781288.">
    <original>C</original>
    <variation>Y</variation>
    <location>
        <position position="141"/>
    </location>
</feature>
<feature type="sequence variant" id="VAR_044778" description="In sporadic cancers; somatic mutation.">
    <original>P</original>
    <variation>A</variation>
    <location>
        <position position="142"/>
    </location>
</feature>
<feature type="sequence variant" id="VAR_045794" description="In sporadic cancers; somatic mutation; requires 2 nucleotide substitutions.">
    <original>P</original>
    <variation>F</variation>
    <location>
        <position position="142"/>
    </location>
</feature>
<feature type="sequence variant" id="VAR_044779" description="In sporadic cancers; somatic mutation.">
    <original>P</original>
    <variation>H</variation>
    <location>
        <position position="142"/>
    </location>
</feature>
<feature type="sequence variant" id="VAR_044780" description="In sporadic cancers; somatic mutation; dbSNP:rs779196500.">
    <original>P</original>
    <variation>L</variation>
    <location>
        <position position="142"/>
    </location>
</feature>
<feature type="sequence variant" id="VAR_044781" description="In a sporadic cancer; somatic mutation.">
    <original>P</original>
    <variation>R</variation>
    <location>
        <position position="142"/>
    </location>
</feature>
<feature type="sequence variant" id="VAR_044782" description="In sporadic cancers; somatic mutation.">
    <original>P</original>
    <variation>S</variation>
    <location>
        <position position="142"/>
    </location>
</feature>
<feature type="sequence variant" id="VAR_044783" description="In sporadic cancers; somatic mutation.">
    <original>P</original>
    <variation>T</variation>
    <location>
        <position position="142"/>
    </location>
</feature>
<feature type="sequence variant" id="VAR_005887" description="In sporadic cancers; somatic mutation; strong DNA binding ability at 32.5 degrees Celsius; strong reduction of transcriptional activity at 37.5 degrees Celsius; severely represses interaction with ZNF385A." evidence="85 173">
    <original>V</original>
    <variation>A</variation>
    <location>
        <position position="143"/>
    </location>
</feature>
<feature type="sequence variant" id="VAR_044784" description="In sporadic cancers; somatic mutation.">
    <original>V</original>
    <variation>E</variation>
    <location>
        <position position="143"/>
    </location>
</feature>
<feature type="sequence variant" id="VAR_044785" description="In sporadic cancers; somatic mutation; dbSNP:rs1555526241.">
    <original>V</original>
    <variation>G</variation>
    <location>
        <position position="143"/>
    </location>
</feature>
<feature type="sequence variant" id="VAR_044786" description="In sporadic cancers; somatic mutation; dbSNP:rs587782620.">
    <original>V</original>
    <variation>L</variation>
    <location>
        <position position="143"/>
    </location>
</feature>
<feature type="sequence variant" id="VAR_044787" description="In sporadic cancers; somatic mutation; dbSNP:rs587782620.">
    <original>V</original>
    <variation>M</variation>
    <location>
        <position position="143"/>
    </location>
</feature>
<feature type="sequence variant" id="VAR_044788" description="In sporadic cancers; somatic mutation; dbSNP:rs786201419.">
    <original>Q</original>
    <variation>H</variation>
    <location>
        <position position="144"/>
    </location>
</feature>
<feature type="sequence variant" id="VAR_044789" description="In sporadic cancers; somatic mutation.">
    <original>Q</original>
    <variation>K</variation>
    <location>
        <position position="144"/>
    </location>
</feature>
<feature type="sequence variant" id="VAR_044790" description="In LFS; germline mutation and in sporadic cancers; somatic mutation; dbSNP:rs786203071.">
    <original>Q</original>
    <variation>L</variation>
    <location>
        <position position="144"/>
    </location>
</feature>
<feature type="sequence variant" id="VAR_005888" description="In sporadic cancers; somatic mutation; dbSNP:rs786203071.">
    <original>Q</original>
    <variation>P</variation>
    <location>
        <position position="144"/>
    </location>
</feature>
<feature type="sequence variant" id="VAR_044791" description="In sporadic cancers; somatic mutation.">
    <original>Q</original>
    <variation>R</variation>
    <location>
        <position position="144"/>
    </location>
</feature>
<feature type="sequence variant" id="VAR_044792" description="In sporadic cancers; somatic mutation.">
    <original>L</original>
    <variation>M</variation>
    <location>
        <position position="145"/>
    </location>
</feature>
<feature type="sequence variant" id="VAR_005889" description="In sporadic cancers; somatic mutation; dbSNP:rs587782197.">
    <original>L</original>
    <variation>P</variation>
    <location>
        <position position="145"/>
    </location>
</feature>
<feature type="sequence variant" id="VAR_005890" description="In sporadic cancers; somatic mutation.">
    <original>L</original>
    <variation>Q</variation>
    <location>
        <position position="145"/>
    </location>
</feature>
<feature type="sequence variant" id="VAR_044793" description="In sporadic cancers; somatic mutation.">
    <original>L</original>
    <variation>R</variation>
    <location>
        <position position="145"/>
    </location>
</feature>
<feature type="sequence variant" id="VAR_044794" description="In sporadic cancers; somatic mutation.">
    <original>L</original>
    <variation>V</variation>
    <location>
        <position position="145"/>
    </location>
</feature>
<feature type="sequence variant" id="VAR_044795" description="In a sporadic cancer; somatic mutation.">
    <original>W</original>
    <variation>C</variation>
    <location>
        <position position="146"/>
    </location>
</feature>
<feature type="sequence variant" id="VAR_044796" description="In sporadic cancers; somatic mutation; dbSNP:rs786203064.">
    <original>W</original>
    <variation>G</variation>
    <location>
        <position position="146"/>
    </location>
</feature>
<feature type="sequence variant" id="VAR_044797" description="In sporadic cancers; somatic mutation.">
    <original>W</original>
    <variation>L</variation>
    <location>
        <position position="146"/>
    </location>
</feature>
<feature type="sequence variant" id="VAR_044798" description="In sporadic cancers; somatic mutation.">
    <original>W</original>
    <variation>R</variation>
    <location>
        <position position="146"/>
    </location>
</feature>
<feature type="sequence variant" id="VAR_044799" description="In sporadic cancers; somatic mutation.">
    <original>W</original>
    <variation>S</variation>
    <location>
        <position position="146"/>
    </location>
</feature>
<feature type="sequence variant" id="VAR_044800" description="In sporadic cancers; somatic mutation.">
    <original>V</original>
    <variation>A</variation>
    <location>
        <position position="147"/>
    </location>
</feature>
<feature type="sequence variant" id="VAR_005891" description="In sporadic cancers; somatic mutation.">
    <original>V</original>
    <variation>D</variation>
    <location>
        <position position="147"/>
    </location>
</feature>
<feature type="sequence variant" id="VAR_044801" description="In sporadic cancers; somatic mutation.">
    <original>V</original>
    <variation>E</variation>
    <location>
        <position position="147"/>
    </location>
</feature>
<feature type="sequence variant" id="VAR_044802" description="In a sporadic cancer; somatic mutation.">
    <original>V</original>
    <variation>F</variation>
    <location>
        <position position="147"/>
    </location>
</feature>
<feature type="sequence variant" id="VAR_005892" description="In sporadic cancers; somatic mutation; dbSNP:rs1453167097.">
    <original>V</original>
    <variation>G</variation>
    <location>
        <position position="147"/>
    </location>
</feature>
<feature type="sequence variant" id="VAR_044803" description="In sporadic cancers; somatic mutation; dbSNP:rs1555526226.">
    <original>V</original>
    <variation>I</variation>
    <location>
        <position position="147"/>
    </location>
</feature>
<feature type="sequence variant" id="VAR_044804" description="In a sporadic cancer; somatic mutation; dbSNP:rs1046611742.">
    <original>D</original>
    <variation>A</variation>
    <location>
        <position position="148"/>
    </location>
</feature>
<feature type="sequence variant" id="VAR_044805" description="In sporadic cancers; somatic mutation.">
    <original>D</original>
    <variation>E</variation>
    <location>
        <position position="148"/>
    </location>
</feature>
<feature type="sequence variant" id="VAR_044806" description="In a sporadic cancer; somatic mutation.">
    <original>D</original>
    <variation>G</variation>
    <location>
        <position position="148"/>
    </location>
</feature>
<feature type="sequence variant" id="VAR_044807" description="In sporadic cancers; somatic mutation.">
    <original>D</original>
    <variation>N</variation>
    <location>
        <position position="148"/>
    </location>
</feature>
<feature type="sequence variant" id="VAR_044808" description="In sporadic cancers; somatic mutation.">
    <original>D</original>
    <variation>V</variation>
    <location>
        <position position="148"/>
    </location>
</feature>
<feature type="sequence variant" id="VAR_044809" description="In sporadic cancers; somatic mutation; dbSNP:rs1131691007.">
    <original>D</original>
    <variation>Y</variation>
    <location>
        <position position="148"/>
    </location>
</feature>
<feature type="sequence variant" id="VAR_044810" description="In sporadic cancers; somatic mutation; dbSNP:rs1555526214.">
    <original>S</original>
    <variation>F</variation>
    <location>
        <position position="149"/>
    </location>
</feature>
<feature type="sequence variant" id="VAR_005893" description="In sporadic cancers; somatic mutation.">
    <original>S</original>
    <variation>P</variation>
    <location>
        <position position="149"/>
    </location>
</feature>
<feature type="sequence variant" id="VAR_044811" description="In sporadic cancers; somatic mutation.">
    <original>S</original>
    <variation>T</variation>
    <location>
        <position position="149"/>
    </location>
</feature>
<feature type="sequence variant" id="VAR_044812" description="In a sporadic cancer; somatic mutation.">
    <original>T</original>
    <variation>A</variation>
    <location>
        <position position="150"/>
    </location>
</feature>
<feature type="sequence variant" id="VAR_044813" description="In sporadic cancers; somatic mutation.">
    <original>T</original>
    <variation>I</variation>
    <location>
        <position position="150"/>
    </location>
</feature>
<feature type="sequence variant" id="VAR_044814" description="In sporadic cancers; somatic mutation.">
    <original>T</original>
    <variation>K</variation>
    <location>
        <position position="150"/>
    </location>
</feature>
<feature type="sequence variant" id="VAR_044815" description="In a sporadic cancer; somatic mutation.">
    <original>T</original>
    <variation>N</variation>
    <location>
        <position position="150"/>
    </location>
</feature>
<feature type="sequence variant" id="VAR_044816" description="In a sporadic cancer; somatic mutation.">
    <original>T</original>
    <variation>P</variation>
    <location>
        <position position="150"/>
    </location>
</feature>
<feature type="sequence variant" id="VAR_044817" description="In a sporadic cancer; somatic mutation.">
    <original>T</original>
    <variation>R</variation>
    <location>
        <position position="150"/>
    </location>
</feature>
<feature type="sequence variant" id="VAR_005894" description="In sporadic cancers; somatic mutation; dbSNP:rs28934874.">
    <original>P</original>
    <variation>A</variation>
    <location>
        <position position="151"/>
    </location>
</feature>
<feature type="sequence variant" id="VAR_044818" description="In sporadic cancers; somatic mutation; dbSNP:rs1057520000.">
    <original>P</original>
    <variation>H</variation>
    <location>
        <position position="151"/>
    </location>
</feature>
<feature type="sequence variant" id="VAR_044819" description="In sporadic cancers; somatic mutation.">
    <original>P</original>
    <variation>L</variation>
    <location>
        <position position="151"/>
    </location>
</feature>
<feature type="sequence variant" id="VAR_044820" description="In sporadic cancers; somatic mutation; dbSNP:rs1057520000.">
    <original>P</original>
    <variation>R</variation>
    <location>
        <position position="151"/>
    </location>
</feature>
<feature type="sequence variant" id="VAR_005895" description="In LFS; germline mutation and in sporadic cancers; somatic mutation; dbSNP:rs28934874." evidence="171">
    <original>P</original>
    <variation>S</variation>
    <location>
        <position position="151"/>
    </location>
</feature>
<feature type="sequence variant" id="VAR_005896" description="In LFS; germline mutation and in sporadic cancers; somatic mutation; dbSNP:rs28934874.">
    <original>P</original>
    <variation>T</variation>
    <location>
        <position position="151"/>
    </location>
</feature>
<feature type="sequence variant" id="VAR_044821" description="In sporadic cancers; somatic mutation.">
    <original>P</original>
    <variation>A</variation>
    <location>
        <position position="152"/>
    </location>
</feature>
<feature type="sequence variant" id="VAR_005897" description="In LFS; germline mutation and in sporadic cancers; somatic mutation; dbSNP:rs587782705." evidence="95">
    <original>P</original>
    <variation>L</variation>
    <location>
        <position position="152"/>
    </location>
</feature>
<feature type="sequence variant" id="VAR_044822" description="In sporadic cancers; somatic mutation.">
    <original>P</original>
    <variation>Q</variation>
    <location>
        <position position="152"/>
    </location>
</feature>
<feature type="sequence variant" id="VAR_044823" description="In sporadic cancers; somatic mutation.">
    <original>P</original>
    <variation>R</variation>
    <location>
        <position position="152"/>
    </location>
</feature>
<feature type="sequence variant" id="VAR_005898" description="In sporadic cancers; somatic mutation; dbSNP:rs767328513." evidence="182">
    <original>P</original>
    <variation>S</variation>
    <location>
        <position position="152"/>
    </location>
</feature>
<feature type="sequence variant" id="VAR_044824" description="In sporadic cancers; somatic mutation.">
    <original>P</original>
    <variation>T</variation>
    <location>
        <position position="152"/>
    </location>
</feature>
<feature type="sequence variant" id="VAR_044825" description="In sporadic cancers; somatic mutation.">
    <original>P</original>
    <variation>A</variation>
    <location>
        <position position="153"/>
    </location>
</feature>
<feature type="sequence variant" id="VAR_045795" description="In a sporadic cancer; somatic mutation; requires 2 nucleotide substitutions.">
    <original>P</original>
    <variation>F</variation>
    <location>
        <position position="153"/>
    </location>
</feature>
<feature type="sequence variant" id="VAR_044826" description="In a sporadic cancer; somatic mutation.">
    <original>P</original>
    <variation>H</variation>
    <location>
        <position position="153"/>
    </location>
</feature>
<feature type="sequence variant" id="VAR_044827" description="In sporadic cancers; somatic mutation.">
    <original>P</original>
    <variation>L</variation>
    <location>
        <position position="153"/>
    </location>
</feature>
<feature type="sequence variant" id="VAR_044828" description="In a sporadic cancer; somatic mutation.">
    <original>P</original>
    <variation>R</variation>
    <location>
        <position position="153"/>
    </location>
</feature>
<feature type="sequence variant" id="VAR_044829" description="In sporadic cancers; somatic mutation; dbSNP:rs1064795860.">
    <original>P</original>
    <variation>S</variation>
    <location>
        <position position="153"/>
    </location>
</feature>
<feature type="sequence variant" id="VAR_005899" description="In sporadic cancers; somatic mutation.">
    <original>P</original>
    <variation>T</variation>
    <location>
        <position position="153"/>
    </location>
</feature>
<feature type="sequence variant" id="VAR_044830" description="In sporadic cancers; somatic mutation.">
    <original>G</original>
    <variation>A</variation>
    <location>
        <position position="154"/>
    </location>
</feature>
<feature type="sequence variant" id="VAR_044831" description="In a sporadic cancer; somatic mutation.">
    <original>G</original>
    <variation>C</variation>
    <location>
        <position position="154"/>
    </location>
</feature>
<feature type="sequence variant" id="VAR_044832" description="In sporadic cancers; somatic mutation; dbSNP:rs762846821.">
    <original>G</original>
    <variation>D</variation>
    <location>
        <position position="154"/>
    </location>
</feature>
<feature type="sequence variant" id="VAR_045796" description="In sporadic cancers; somatic mutation; requires 2 nucleotide substitutions.">
    <original>G</original>
    <variation>I</variation>
    <location>
        <position position="154"/>
    </location>
</feature>
<feature type="sequence variant" id="VAR_044833" description="In sporadic cancers; somatic mutation; dbSNP:rs137852789.">
    <original>G</original>
    <variation>S</variation>
    <location>
        <position position="154"/>
    </location>
</feature>
<feature type="sequence variant" id="VAR_005900" description="In a brain tumor with no family history; germline mutation and in sporadic cancers; somatic mutation; dbSNP:rs762846821." evidence="136">
    <original>G</original>
    <variation>V</variation>
    <location>
        <position position="154"/>
    </location>
</feature>
<feature type="sequence variant" id="VAR_005901" description="In sporadic cancers; somatic mutation; dbSNP:rs772683278." evidence="95">
    <original>T</original>
    <variation>A</variation>
    <location>
        <position position="155"/>
    </location>
</feature>
<feature type="sequence variant" id="VAR_044834" description="In sporadic cancers; somatic mutation.">
    <original>T</original>
    <variation>I</variation>
    <location>
        <position position="155"/>
    </location>
</feature>
<feature type="sequence variant" id="VAR_044835" description="In a sporadic cancer; somatic mutation.">
    <original>T</original>
    <variation>M</variation>
    <location>
        <position position="155"/>
    </location>
</feature>
<feature type="sequence variant" id="VAR_044836" description="In LFS; germline mutation and in sporadic cancers; somatic mutation; dbSNP:rs786202752.">
    <original>T</original>
    <variation>N</variation>
    <location>
        <position position="155"/>
    </location>
</feature>
<feature type="sequence variant" id="VAR_044837" description="In sporadic cancers; somatic mutation; does not induce SNAI1 degradation." evidence="35 121">
    <original>T</original>
    <variation>P</variation>
    <location>
        <position position="155"/>
    </location>
</feature>
<feature type="sequence variant" id="VAR_044838" description="In sporadic cancers; somatic mutation; dbSNP:rs786202752.">
    <original>T</original>
    <variation>S</variation>
    <location>
        <position position="155"/>
    </location>
</feature>
<feature type="sequence variant" id="VAR_044839" description="In sporadic cancers; somatic mutation; dbSNP:rs563378859.">
    <original>R</original>
    <variation>C</variation>
    <location>
        <position position="156"/>
    </location>
</feature>
<feature type="sequence variant" id="VAR_044840" description="In sporadic cancers; somatic mutation.">
    <original>R</original>
    <variation>G</variation>
    <location>
        <position position="156"/>
    </location>
</feature>
<feature type="sequence variant" id="VAR_044841" description="In LFS; germline mutation and in sporadic cancers; somatic mutation; dbSNP:rs371524413.">
    <original>R</original>
    <variation>H</variation>
    <location>
        <position position="156"/>
    </location>
</feature>
<feature type="sequence variant" id="VAR_044842" description="In sporadic cancers; somatic mutation.">
    <original>R</original>
    <variation>L</variation>
    <location>
        <position position="156"/>
    </location>
</feature>
<feature type="sequence variant" id="VAR_005902" description="In sporadic cancers; somatic mutation." evidence="171">
    <original>R</original>
    <variation>P</variation>
    <location>
        <position position="156"/>
    </location>
</feature>
<feature type="sequence variant" id="VAR_044843" description="In sporadic cancers; somatic mutation.">
    <original>R</original>
    <variation>S</variation>
    <location>
        <position position="156"/>
    </location>
</feature>
<feature type="sequence variant" id="VAR_044844" description="In sporadic cancers; somatic mutation; dbSNP:rs1131691023.">
    <original>V</original>
    <variation>A</variation>
    <location>
        <position position="157"/>
    </location>
</feature>
<feature type="sequence variant" id="VAR_005903" description="In sporadic cancers; somatic mutation.">
    <original>V</original>
    <variation>D</variation>
    <location>
        <position position="157"/>
    </location>
</feature>
<feature type="sequence variant" id="VAR_005904" description="In sporadic cancers; somatic mutation; dbSNP:rs121912654." evidence="65">
    <original>V</original>
    <variation>F</variation>
    <location>
        <position position="157"/>
    </location>
</feature>
<feature type="sequence variant" id="VAR_044845" description="In sporadic cancers; somatic mutation.">
    <original>V</original>
    <variation>G</variation>
    <location>
        <position position="157"/>
    </location>
</feature>
<feature type="sequence variant" id="VAR_012977" description="In sporadic cancers; somatic mutation; dbSNP:rs121912654." evidence="181">
    <original>V</original>
    <variation>I</variation>
    <location>
        <position position="157"/>
    </location>
</feature>
<feature type="sequence variant" id="VAR_044846" description="In sporadic cancers; somatic mutation.">
    <original>V</original>
    <variation>L</variation>
    <location>
        <position position="157"/>
    </location>
</feature>
<feature type="sequence variant" id="VAR_005905" description="In sporadic cancers; somatic mutation; dbSNP:rs587780068.">
    <original>R</original>
    <variation>C</variation>
    <location>
        <position position="158"/>
    </location>
</feature>
<feature type="sequence variant" id="VAR_045797" description="In a sporadic cancer; somatic mutation; requires 2 nucleotide substitutions.">
    <original>R</original>
    <variation>F</variation>
    <location>
        <position position="158"/>
    </location>
</feature>
<feature type="sequence variant" id="VAR_005906" description="In LFS; germline mutation and in sporadic cancers; somatic mutation.">
    <original>R</original>
    <variation>G</variation>
    <location>
        <position position="158"/>
    </location>
</feature>
<feature type="sequence variant" id="VAR_005907" description="In LFS; germline mutation and in sporadic cancers; somatic mutation; dbSNP:rs587782144.">
    <original>R</original>
    <variation>H</variation>
    <location>
        <position position="158"/>
    </location>
</feature>
<feature type="sequence variant" id="VAR_044847" description="In sporadic cancers; somatic mutation.">
    <original>R</original>
    <variation>L</variation>
    <location>
        <position position="158"/>
    </location>
</feature>
<feature type="sequence variant" id="VAR_044848" description="In sporadic cancers; somatic mutation; dbSNP:rs587782144.">
    <original>R</original>
    <variation>P</variation>
    <location>
        <position position="158"/>
    </location>
</feature>
<feature type="sequence variant" id="VAR_044849" description="In a sporadic cancer; somatic mutation.">
    <original>R</original>
    <variation>Q</variation>
    <location>
        <position position="158"/>
    </location>
</feature>
<feature type="sequence variant" id="VAR_044850" description="In sporadic cancers; somatic mutation.">
    <original>R</original>
    <variation>S</variation>
    <location>
        <position position="158"/>
    </location>
</feature>
<feature type="sequence variant" id="VAR_045798" description="In a sporadic cancer; somatic mutation; requires 2 nucleotide substitutions.">
    <original>R</original>
    <variation>Y</variation>
    <location>
        <position position="158"/>
    </location>
</feature>
<feature type="sequence variant" id="VAR_044851" description="In sporadic cancers; somatic mutation.">
    <original>A</original>
    <variation>D</variation>
    <location>
        <position position="159"/>
    </location>
</feature>
<feature type="sequence variant" id="VAR_045799" description="In a sporadic cancer; somatic mutation; requires 2 nucleotide substitutions; dbSNP:rs730882022.">
    <original>A</original>
    <variation>F</variation>
    <location>
        <position position="159"/>
    </location>
</feature>
<feature type="sequence variant" id="VAR_044852" description="In sporadic cancers; somatic mutation.">
    <original>A</original>
    <variation>G</variation>
    <location>
        <position position="159"/>
    </location>
</feature>
<feature type="sequence variant" id="VAR_044853" description="In sporadic cancers; somatic mutation; dbSNP:rs730882000.">
    <original>A</original>
    <variation>P</variation>
    <location>
        <position position="159"/>
    </location>
</feature>
<feature type="sequence variant" id="VAR_044854" description="In sporadic cancers; somatic mutation.">
    <original>A</original>
    <variation>S</variation>
    <location>
        <position position="159"/>
    </location>
</feature>
<feature type="sequence variant" id="VAR_044855" description="In sporadic cancers; somatic mutation; dbSNP:rs730882000.">
    <original>A</original>
    <variation>T</variation>
    <location>
        <position position="159"/>
    </location>
</feature>
<feature type="sequence variant" id="VAR_044856" description="In sporadic cancers; somatic mutation; dbSNP:rs1555526131.">
    <original>A</original>
    <variation>V</variation>
    <location>
        <position position="159"/>
    </location>
</feature>
<feature type="sequence variant" id="VAR_047160" description="In a sporadic cancer; somatic mutation.">
    <original>MA</original>
    <variation>IP</variation>
    <location>
        <begin position="160"/>
        <end position="161"/>
    </location>
</feature>
<feature type="sequence variant" id="VAR_047161" description="In sporadic cancers; somatic mutation.">
    <original>MA</original>
    <variation>IS</variation>
    <location>
        <begin position="160"/>
        <end position="161"/>
    </location>
</feature>
<feature type="sequence variant" id="VAR_047162" description="In a sporadic cancer; somatic mutation.">
    <original>MA</original>
    <variation>IT</variation>
    <location>
        <begin position="160"/>
        <end position="161"/>
    </location>
</feature>
<feature type="sequence variant" id="VAR_005908" description="In sporadic cancers; somatic mutation; dbSNP:rs772354334.">
    <original>M</original>
    <variation>I</variation>
    <location>
        <position position="160"/>
    </location>
</feature>
<feature type="sequence variant" id="VAR_044857" description="In sporadic cancers; somatic mutation.">
    <original>M</original>
    <variation>K</variation>
    <location>
        <position position="160"/>
    </location>
</feature>
<feature type="sequence variant" id="VAR_044858" description="In a sporadic cancer; somatic mutation.">
    <original>M</original>
    <variation>T</variation>
    <location>
        <position position="160"/>
    </location>
</feature>
<feature type="sequence variant" id="VAR_044859" description="In sporadic cancers; somatic mutation; dbSNP:rs377274728.">
    <original>M</original>
    <variation>V</variation>
    <location>
        <position position="160"/>
    </location>
</feature>
<feature type="sequence variant" id="VAR_044860" description="In sporadic cancers; somatic mutation; dbSNP:rs1064795691.">
    <original>A</original>
    <variation>D</variation>
    <location>
        <position position="161"/>
    </location>
</feature>
<feature type="sequence variant" id="VAR_045800" description="In a sporadic cancer; somatic mutation; requires 2 nucleotide substitutions.">
    <original>A</original>
    <variation>F</variation>
    <location>
        <position position="161"/>
    </location>
</feature>
<feature type="sequence variant" id="VAR_044861" description="In sporadic cancers; somatic mutation.">
    <original>A</original>
    <variation>G</variation>
    <location>
        <position position="161"/>
    </location>
</feature>
<feature type="sequence variant" id="VAR_044862" description="In sporadic cancers; somatic mutation.">
    <original>A</original>
    <variation>P</variation>
    <location>
        <position position="161"/>
    </location>
</feature>
<feature type="sequence variant" id="VAR_005909" description="In sporadic cancers; somatic mutation.">
    <original>A</original>
    <variation>S</variation>
    <location>
        <position position="161"/>
    </location>
</feature>
<feature type="sequence variant" id="VAR_044863" description="In sporadic cancers; somatic mutation; dbSNP:rs193920817.">
    <original>A</original>
    <variation>T</variation>
    <location>
        <position position="161"/>
    </location>
</feature>
<feature type="sequence variant" id="VAR_044864" description="In sporadic cancers; somatic mutation.">
    <original>A</original>
    <variation>V</variation>
    <location>
        <position position="161"/>
    </location>
</feature>
<feature type="sequence variant" id="VAR_044865" description="In sporadic cancers; somatic mutation.">
    <original>I</original>
    <variation>F</variation>
    <location>
        <position position="162"/>
    </location>
</feature>
<feature type="sequence variant" id="VAR_044866" description="In sporadic cancers; somatic mutation.">
    <original>I</original>
    <variation>M</variation>
    <location>
        <position position="162"/>
    </location>
</feature>
<feature type="sequence variant" id="VAR_044867" description="In a breast cancer with no family history; germline mutation and in sporadic cancers; somatic mutation.">
    <original>I</original>
    <variation>N</variation>
    <location>
        <position position="162"/>
    </location>
</feature>
<feature type="sequence variant" id="VAR_005910" description="In sporadic cancers; somatic mutation; dbSNP:rs587780069.">
    <original>I</original>
    <variation>S</variation>
    <location>
        <position position="162"/>
    </location>
</feature>
<feature type="sequence variant" id="VAR_044868" description="In sporadic cancers; somatic mutation.">
    <original>I</original>
    <variation>T</variation>
    <location>
        <position position="162"/>
    </location>
</feature>
<feature type="sequence variant" id="VAR_005911" description="In sporadic cancers; somatic mutation.">
    <original>I</original>
    <variation>V</variation>
    <location>
        <position position="162"/>
    </location>
</feature>
<feature type="sequence variant" id="VAR_033035" description="In LFS; germline mutation and in sporadic cancers; somatic mutation; dbSNP:rs148924904." evidence="65 75">
    <original>Y</original>
    <variation>C</variation>
    <location>
        <position position="163"/>
    </location>
</feature>
<feature type="sequence variant" id="VAR_044869" description="In sporadic cancers; somatic mutation; dbSNP:rs786203436.">
    <original>Y</original>
    <variation>D</variation>
    <location>
        <position position="163"/>
    </location>
</feature>
<feature type="sequence variant" id="VAR_044870" description="In a sporadic cancer; somatic mutation.">
    <original>Y</original>
    <variation>F</variation>
    <location>
        <position position="163"/>
    </location>
</feature>
<feature type="sequence variant" id="VAR_005912" description="In sporadic cancers; somatic mutation; dbSNP:rs786203436." evidence="75">
    <original>Y</original>
    <variation>H</variation>
    <location>
        <position position="163"/>
    </location>
</feature>
<feature type="sequence variant" id="VAR_044871" description="In sporadic cancers; somatic mutation; dbSNP:rs786203436.">
    <original>Y</original>
    <variation>N</variation>
    <location>
        <position position="163"/>
    </location>
</feature>
<feature type="sequence variant" id="VAR_044872" description="In sporadic cancers; somatic mutation.">
    <original>Y</original>
    <variation>S</variation>
    <location>
        <position position="163"/>
    </location>
</feature>
<feature type="sequence variant" id="VAR_044873" description="In sporadic cancers; somatic mutation; dbSNP:rs879254249.">
    <original>K</original>
    <variation>E</variation>
    <location>
        <position position="164"/>
    </location>
</feature>
<feature type="sequence variant" id="VAR_044874" description="In sporadic cancers; somatic mutation.">
    <original>K</original>
    <variation>M</variation>
    <location>
        <position position="164"/>
    </location>
</feature>
<feature type="sequence variant" id="VAR_005913" description="In sporadic cancers; somatic mutation; dbSNP:rs1131691034.">
    <original>K</original>
    <variation>N</variation>
    <location>
        <position position="164"/>
    </location>
</feature>
<feature type="sequence variant" id="VAR_005914" description="In sporadic cancers; somatic mutation.">
    <original>K</original>
    <variation>Q</variation>
    <location>
        <position position="164"/>
    </location>
</feature>
<feature type="sequence variant" id="VAR_044875" description="In sporadic cancers; somatic mutation.">
    <original>K</original>
    <variation>R</variation>
    <location>
        <position position="164"/>
    </location>
</feature>
<feature type="sequence variant" id="VAR_044876" description="In sporadic cancers; somatic mutation.">
    <original>K</original>
    <variation>T</variation>
    <location>
        <position position="164"/>
    </location>
</feature>
<feature type="sequence variant" id="VAR_044877" description="In sporadic cancers; somatic mutation.">
    <original>Q</original>
    <variation>E</variation>
    <location>
        <position position="165"/>
    </location>
</feature>
<feature type="sequence variant" id="VAR_044878" description="In a sporadic cancer; somatic mutation.">
    <original>Q</original>
    <variation>H</variation>
    <location>
        <position position="165"/>
    </location>
</feature>
<feature type="sequence variant" id="VAR_005915" description="In sporadic cancers; somatic mutation.">
    <original>Q</original>
    <variation>L</variation>
    <location>
        <position position="165"/>
    </location>
</feature>
<feature type="sequence variant" id="VAR_044879" description="In sporadic cancers; somatic mutation.">
    <original>Q</original>
    <variation>P</variation>
    <location>
        <position position="165"/>
    </location>
</feature>
<feature type="sequence variant" id="VAR_005916" description="In sporadic cancers; somatic mutation.">
    <original>Q</original>
    <variation>R</variation>
    <location>
        <position position="165"/>
    </location>
</feature>
<feature type="sequence variant" id="VAR_044880" description="In sporadic cancers; somatic mutation.">
    <original>S</original>
    <variation>A</variation>
    <location>
        <position position="166"/>
    </location>
</feature>
<feature type="sequence variant" id="VAR_044881" description="In a sporadic cancer; somatic mutation.">
    <original>S</original>
    <variation>G</variation>
    <location>
        <position position="166"/>
    </location>
</feature>
<feature type="sequence variant" id="VAR_005917" description="In sporadic cancers; somatic mutation; dbSNP:rs1555526101.">
    <original>S</original>
    <variation>L</variation>
    <location>
        <position position="166"/>
    </location>
</feature>
<feature type="sequence variant" id="VAR_044882" description="In sporadic cancers; somatic mutation.">
    <original>S</original>
    <variation>P</variation>
    <location>
        <position position="166"/>
    </location>
</feature>
<feature type="sequence variant" id="VAR_044883" description="In sporadic cancers; somatic mutation.">
    <original>S</original>
    <variation>T</variation>
    <location>
        <position position="166"/>
    </location>
</feature>
<feature type="sequence variant" id="VAR_047163" description="In a sporadic cancer; somatic mutation.">
    <original>QH</original>
    <variation>HD</variation>
    <location>
        <begin position="167"/>
        <end position="168"/>
    </location>
</feature>
<feature type="sequence variant" id="VAR_047164" description="In a sporadic cancer; somatic mutation.">
    <original>QH</original>
    <variation>YL</variation>
    <location>
        <begin position="167"/>
        <end position="168"/>
    </location>
</feature>
<feature type="sequence variant" id="VAR_044884" description="In sporadic cancers; somatic mutation.">
    <original>Q</original>
    <variation>H</variation>
    <location>
        <position position="167"/>
    </location>
</feature>
<feature type="sequence variant" id="VAR_044885" description="In LFS; germline mutation and in a sporadic cancer; somatic mutation.">
    <original>Q</original>
    <variation>K</variation>
    <location>
        <position position="167"/>
    </location>
</feature>
<feature type="sequence variant" id="VAR_044886" description="In sporadic cancers; somatic mutation.">
    <original>Q</original>
    <variation>L</variation>
    <location>
        <position position="167"/>
    </location>
</feature>
<feature type="sequence variant" id="VAR_044887" description="In sporadic cancers; somatic mutation.">
    <original>Q</original>
    <variation>R</variation>
    <location>
        <position position="167"/>
    </location>
</feature>
<feature type="sequence variant" id="VAR_047165" description="In a sporadic cancer; somatic mutation.">
    <original>HM</original>
    <variation>LI</variation>
    <location>
        <begin position="168"/>
        <end position="169"/>
    </location>
</feature>
<feature type="sequence variant" id="VAR_044888" description="In sporadic cancers; somatic mutation.">
    <original>H</original>
    <variation>D</variation>
    <location>
        <position position="168"/>
    </location>
</feature>
<feature type="sequence variant" id="VAR_044889" description="In sporadic cancers; somatic mutation.">
    <original>H</original>
    <variation>L</variation>
    <location>
        <position position="168"/>
    </location>
</feature>
<feature type="sequence variant" id="VAR_044890" description="In sporadic cancers; somatic mutation.">
    <original>H</original>
    <variation>N</variation>
    <location>
        <position position="168"/>
    </location>
</feature>
<feature type="sequence variant" id="VAR_044891" description="In sporadic cancers; somatic mutation.">
    <original>H</original>
    <variation>P</variation>
    <location>
        <position position="168"/>
    </location>
</feature>
<feature type="sequence variant" id="VAR_044892" description="In sporadic cancers; somatic mutation.">
    <original>H</original>
    <variation>Q</variation>
    <location>
        <position position="168"/>
    </location>
</feature>
<feature type="sequence variant" id="VAR_005918" description="In sporadic cancers; somatic mutation; dbSNP:rs867114783.">
    <original>H</original>
    <variation>R</variation>
    <location>
        <position position="168"/>
    </location>
</feature>
<feature type="sequence variant" id="VAR_045801" description="In a sporadic cancer; somatic mutation; requires 2 nucleotide substitutions.">
    <original>H</original>
    <variation>V</variation>
    <location>
        <position position="168"/>
    </location>
</feature>
<feature type="sequence variant" id="VAR_044893" description="In sporadic cancers; somatic mutation.">
    <original>H</original>
    <variation>Y</variation>
    <location>
        <position position="168"/>
    </location>
</feature>
<feature type="sequence variant" id="VAR_047166" description="In a sporadic cancer; somatic mutation.">
    <original>MT</original>
    <variation>IS</variation>
    <location>
        <begin position="169"/>
        <end position="170"/>
    </location>
</feature>
<feature type="sequence variant" id="VAR_005919" description="In sporadic cancers; somatic mutation." evidence="182">
    <original>M</original>
    <variation>I</variation>
    <location>
        <position position="169"/>
    </location>
</feature>
<feature type="sequence variant" id="VAR_044894" description="In sporadic cancers; somatic mutation.">
    <original>M</original>
    <variation>K</variation>
    <location>
        <position position="169"/>
    </location>
</feature>
<feature type="sequence variant" id="VAR_005920" description="In sporadic cancers; somatic mutation.">
    <original>M</original>
    <variation>T</variation>
    <location>
        <position position="169"/>
    </location>
</feature>
<feature type="sequence variant" id="VAR_044895" description="In sporadic cancers; somatic mutation.">
    <original>M</original>
    <variation>V</variation>
    <location>
        <position position="169"/>
    </location>
</feature>
<feature type="sequence variant" id="VAR_044896" description="In sporadic cancers; somatic mutation; dbSNP:rs587780729.">
    <original>T</original>
    <variation>A</variation>
    <location>
        <position position="170"/>
    </location>
</feature>
<feature type="sequence variant" id="VAR_044897" description="In a sporadic cancer; somatic mutation.">
    <original>T</original>
    <variation>K</variation>
    <location>
        <position position="170"/>
    </location>
</feature>
<feature type="sequence variant" id="VAR_005921" description="In sporadic cancers; somatic mutation; dbSNP:rs779000871.">
    <original>T</original>
    <variation>M</variation>
    <location>
        <position position="170"/>
    </location>
</feature>
<feature type="sequence variant" id="VAR_044898" description="In a sporadic cancer; somatic mutation.">
    <original>T</original>
    <variation>P</variation>
    <location>
        <position position="170"/>
    </location>
</feature>
<feature type="sequence variant" id="VAR_005922" description="In sporadic cancers; somatic mutation.">
    <original>T</original>
    <variation>S</variation>
    <location>
        <position position="170"/>
    </location>
</feature>
<feature type="sequence variant" id="VAR_044899" description="In a sporadic cancer; somatic mutation.">
    <original>E</original>
    <variation>A</variation>
    <location>
        <position position="171"/>
    </location>
</feature>
<feature type="sequence variant" id="VAR_044900" description="In sporadic cancers; somatic mutation.">
    <original>E</original>
    <variation>D</variation>
    <location>
        <position position="171"/>
    </location>
</feature>
<feature type="sequence variant" id="VAR_044901" description="In sporadic cancers; somatic mutation.">
    <original>E</original>
    <variation>G</variation>
    <location>
        <position position="171"/>
    </location>
</feature>
<feature type="sequence variant" id="VAR_044902" description="In sporadic cancers; somatic mutation; dbSNP:rs587781845.">
    <original>E</original>
    <variation>K</variation>
    <location>
        <position position="171"/>
    </location>
</feature>
<feature type="sequence variant" id="VAR_044903" description="In a sporadic cancer; somatic mutation.">
    <original>E</original>
    <variation>Q</variation>
    <location>
        <position position="171"/>
    </location>
</feature>
<feature type="sequence variant" id="VAR_044904" description="In sporadic cancers; somatic mutation.">
    <original>E</original>
    <variation>V</variation>
    <location>
        <position position="171"/>
    </location>
</feature>
<feature type="sequence variant" id="VAR_005923" description="In sporadic cancers; somatic mutation.">
    <original>V</original>
    <variation>A</variation>
    <location>
        <position position="172"/>
    </location>
</feature>
<feature type="sequence variant" id="VAR_044905" description="In sporadic cancers; somatic mutation.">
    <original>V</original>
    <variation>D</variation>
    <location>
        <position position="172"/>
    </location>
</feature>
<feature type="sequence variant" id="VAR_044906" description="In LFS; germline mutation and in sporadic cancers; somatic mutation; dbSNP:rs1131691043.">
    <original>V</original>
    <variation>F</variation>
    <location>
        <position position="172"/>
    </location>
</feature>
<feature type="sequence variant" id="VAR_044907" description="In sporadic cancers; somatic mutation; dbSNP:rs1131691021.">
    <original>V</original>
    <variation>G</variation>
    <location>
        <position position="172"/>
    </location>
</feature>
<feature type="sequence variant" id="VAR_044908" description="In sporadic cancers; somatic mutation.">
    <original>V</original>
    <variation>I</variation>
    <location>
        <position position="172"/>
    </location>
</feature>
<feature type="sequence variant" id="VAR_044909" description="In sporadic cancers; somatic mutation; dbSNP:rs1057519747.">
    <original>V</original>
    <variation>A</variation>
    <location>
        <position position="173"/>
    </location>
</feature>
<feature type="sequence variant" id="VAR_005924" description="In sporadic cancers; somatic mutation; dbSNP:rs1057519747.">
    <original>V</original>
    <variation>E</variation>
    <location>
        <position position="173"/>
    </location>
</feature>
<feature type="sequence variant" id="VAR_044910" description="In sporadic cancers; somatic mutation; dbSNP:rs1057519747.">
    <original>V</original>
    <variation>G</variation>
    <location>
        <position position="173"/>
    </location>
</feature>
<feature type="sequence variant" id="VAR_005925" description="In sporadic cancers; somatic mutation; dbSNP:rs876660754.">
    <original>V</original>
    <variation>L</variation>
    <location>
        <position position="173"/>
    </location>
</feature>
<feature type="sequence variant" id="VAR_005926" description="In LFS; germline mutation and in sporadic cancers; somatic mutation; dbSNP:rs876660754.">
    <original>V</original>
    <variation>M</variation>
    <location>
        <position position="173"/>
    </location>
</feature>
<feature type="sequence variant" id="VAR_045802" description="In a sporadic cancer; somatic mutation; requires 2 nucleotide substitutions.">
    <original>V</original>
    <variation>W</variation>
    <location>
        <position position="173"/>
    </location>
</feature>
<feature type="sequence variant" id="VAR_044911" description="In LFS; germline mutation and in a sporadic cancer; somatic mutation; dbSNP:rs864622115.">
    <original>R</original>
    <variation>G</variation>
    <location>
        <position position="174"/>
    </location>
</feature>
<feature type="sequence variant" id="VAR_005927" description="In sporadic cancers; somatic mutation; dbSNP:rs1064796681." evidence="171">
    <original>R</original>
    <variation>K</variation>
    <location>
        <position position="174"/>
    </location>
</feature>
<feature type="sequence variant" id="VAR_044912" description="In sporadic cancers; somatic mutation.">
    <original>R</original>
    <variation>M</variation>
    <location>
        <position position="174"/>
    </location>
</feature>
<feature type="sequence variant" id="VAR_044913" description="In sporadic cancers; somatic mutation.">
    <original>R</original>
    <variation>S</variation>
    <location>
        <position position="174"/>
    </location>
</feature>
<feature type="sequence variant" id="VAR_044914" description="In a sporadic cancer; somatic mutation.">
    <original>R</original>
    <variation>T</variation>
    <location>
        <position position="174"/>
    </location>
</feature>
<feature type="sequence variant" id="VAR_044915" description="In sporadic cancers; somatic mutation.">
    <original>R</original>
    <variation>W</variation>
    <location>
        <position position="174"/>
    </location>
</feature>
<feature type="sequence variant" id="VAR_005928" description="In sporadic cancers; somatic mutation; dbSNP:rs138729528.">
    <original>R</original>
    <variation>C</variation>
    <location>
        <position position="175"/>
    </location>
</feature>
<feature type="sequence variant" id="VAR_005929" description="In LFS; germline mutation and in sporadic cancers; somatic mutation; dbSNP:rs138729528.">
    <original>R</original>
    <variation>G</variation>
    <location>
        <position position="175"/>
    </location>
</feature>
<feature type="sequence variant" id="VAR_005932" description="In LFS; germline mutation and in sporadic cancers; somatic mutation; does not induce SNAI1 degradation; reduces interaction with ZNF385A; dbSNP:rs28934578." evidence="65 85 95 121 153 172 176">
    <original>R</original>
    <variation>H</variation>
    <location>
        <position position="175"/>
    </location>
</feature>
<feature type="sequence variant" id="VAR_005930" description="In LFS; germline mutation and in sporadic cancers; somatic mutation; dbSNP:rs28934578.">
    <original>R</original>
    <variation>L</variation>
    <location>
        <position position="175"/>
    </location>
</feature>
<feature type="sequence variant" id="VAR_005931" description="In sporadic cancers; somatic mutation." evidence="85">
    <original>R</original>
    <variation>P</variation>
    <location>
        <position position="175"/>
    </location>
</feature>
<feature type="sequence variant" id="VAR_044916" description="In a sporadic cancer; somatic mutation.">
    <original>R</original>
    <variation>Q</variation>
    <location>
        <position position="175"/>
    </location>
</feature>
<feature type="sequence variant" id="VAR_044917" description="In sporadic cancers; somatic mutation.">
    <original>R</original>
    <variation>S</variation>
    <location>
        <position position="175"/>
    </location>
</feature>
<feature type="sequence variant" id="VAR_047167" description="In a sporadic cancer; somatic mutation.">
    <original>CP</original>
    <variation>FS</variation>
    <location>
        <begin position="176"/>
        <end position="177"/>
    </location>
</feature>
<feature type="sequence variant" id="VAR_005933" description="In sporadic cancers; somatic mutation; dbSNP:rs786202962." evidence="32 95 177 182">
    <original>C</original>
    <variation>F</variation>
    <location>
        <position position="176"/>
    </location>
</feature>
<feature type="sequence variant" id="VAR_044918" description="In sporadic cancers; somatic mutation.">
    <original>C</original>
    <variation>G</variation>
    <location>
        <position position="176"/>
    </location>
</feature>
<feature type="sequence variant" id="VAR_044919" description="In sporadic cancers; somatic mutation.">
    <original>C</original>
    <variation>R</variation>
    <location>
        <position position="176"/>
    </location>
</feature>
<feature type="sequence variant" id="VAR_044920" description="In sporadic cancers; somatic mutation; dbSNP:rs967461896.">
    <original>C</original>
    <variation>S</variation>
    <location>
        <position position="176"/>
    </location>
</feature>
<feature type="sequence variant" id="VAR_005934" description="In sporadic cancers; somatic mutation; dbSNP:rs1057519980.">
    <original>C</original>
    <variation>W</variation>
    <location>
        <position position="176"/>
    </location>
</feature>
<feature type="sequence variant" id="VAR_044921" description="In sporadic cancers; somatic mutation; dbSNP:rs786202962.">
    <original>C</original>
    <variation>Y</variation>
    <location>
        <position position="176"/>
    </location>
</feature>
<feature type="sequence variant" id="VAR_044922" description="In a sporadic cancer; somatic mutation.">
    <original>P</original>
    <variation>A</variation>
    <location>
        <position position="177"/>
    </location>
</feature>
<feature type="sequence variant" id="VAR_045803" description="In sporadic cancers; somatic mutation; requires 2 nucleotide substitutions.">
    <original>P</original>
    <variation>F</variation>
    <location>
        <position position="177"/>
    </location>
</feature>
<feature type="sequence variant" id="VAR_044923" description="In sporadic cancers; somatic mutation.">
    <original>P</original>
    <variation>H</variation>
    <location>
        <position position="177"/>
    </location>
</feature>
<feature type="sequence variant" id="VAR_045804" description="In a sporadic cancer; somatic mutation; requires 2 nucleotide substitutions.">
    <original>P</original>
    <variation>I</variation>
    <location>
        <position position="177"/>
    </location>
</feature>
<feature type="sequence variant" id="VAR_005935" description="In sporadic cancers; somatic mutation; dbSNP:rs751477326.">
    <original>P</original>
    <variation>L</variation>
    <location>
        <position position="177"/>
    </location>
</feature>
<feature type="sequence variant" id="VAR_036505" description="In sporadic cancers; somatic mutation; dbSNP:rs751477326." evidence="65">
    <original>P</original>
    <variation>R</variation>
    <location>
        <position position="177"/>
    </location>
</feature>
<feature type="sequence variant" id="VAR_044924" description="In sporadic cancers; somatic mutation; dbSNP:rs147002414.">
    <original>P</original>
    <variation>S</variation>
    <location>
        <position position="177"/>
    </location>
</feature>
<feature type="sequence variant" id="VAR_044925" description="In a sporadic cancer; somatic mutation.">
    <original>P</original>
    <variation>T</variation>
    <location>
        <position position="177"/>
    </location>
</feature>
<feature type="sequence variant" id="VAR_047168" description="In a sporadic cancer; somatic mutation.">
    <original>HH</original>
    <variation>QS</variation>
    <location>
        <begin position="178"/>
        <end position="179"/>
    </location>
</feature>
<feature type="sequence variant" id="VAR_044926" description="In sporadic cancers; somatic mutation.">
    <original>H</original>
    <variation>D</variation>
    <location>
        <position position="178"/>
    </location>
</feature>
<feature type="sequence variant" id="VAR_005936" description="In a Burkitt lymphoma." evidence="31">
    <original>H</original>
    <variation>HPHP</variation>
    <location>
        <position position="178"/>
    </location>
</feature>
<feature type="sequence variant" id="VAR_044927" description="In a sporadic cancer; somatic mutation.">
    <original>H</original>
    <variation>L</variation>
    <location>
        <position position="178"/>
    </location>
</feature>
<feature type="sequence variant" id="VAR_044928" description="In sporadic cancers; somatic mutation; dbSNP:rs1064795203.">
    <original>H</original>
    <variation>N</variation>
    <location>
        <position position="178"/>
    </location>
</feature>
<feature type="sequence variant" id="VAR_044929" description="In sporadic cancers; somatic mutation; dbSNP:rs1555526004.">
    <original>H</original>
    <variation>P</variation>
    <location>
        <position position="178"/>
    </location>
</feature>
<feature type="sequence variant" id="VAR_044930" description="In sporadic cancers; somatic mutation.">
    <original>H</original>
    <variation>Q</variation>
    <location>
        <position position="178"/>
    </location>
</feature>
<feature type="sequence variant" id="VAR_044931" description="In sporadic cancers; somatic mutation.">
    <original>H</original>
    <variation>R</variation>
    <location>
        <position position="178"/>
    </location>
</feature>
<feature type="sequence variant" id="VAR_044932" description="In sporadic cancers; somatic mutation.">
    <original>H</original>
    <variation>Y</variation>
    <location>
        <position position="178"/>
    </location>
</feature>
<feature type="sequence variant" id="VAR_044933" description="In sporadic cancers; somatic mutation; dbSNP:rs587780070.">
    <original>H</original>
    <variation>D</variation>
    <location>
        <position position="179"/>
    </location>
</feature>
<feature type="sequence variant" id="VAR_044934" description="In sporadic cancers; somatic mutation; dbSNP:rs1057519991.">
    <original>H</original>
    <variation>L</variation>
    <location>
        <position position="179"/>
    </location>
</feature>
<feature type="sequence variant" id="VAR_044935" description="In sporadic cancers; somatic mutation; dbSNP:rs587780070.">
    <original>H</original>
    <variation>N</variation>
    <location>
        <position position="179"/>
    </location>
</feature>
<feature type="sequence variant" id="VAR_044936" description="In sporadic cancers; somatic mutation; dbSNP:rs1057519991.">
    <original>H</original>
    <variation>P</variation>
    <location>
        <position position="179"/>
    </location>
</feature>
<feature type="sequence variant" id="VAR_044937" description="In sporadic cancers; somatic mutation; dbSNP:rs876660821.">
    <original>H</original>
    <variation>Q</variation>
    <location>
        <position position="179"/>
    </location>
</feature>
<feature type="sequence variant" id="VAR_044938" description="In sporadic cancers; somatic mutation; dbSNP:rs1057519991.">
    <original>H</original>
    <variation>R</variation>
    <location>
        <position position="179"/>
    </location>
</feature>
<feature type="sequence variant" id="VAR_044939" description="In LFS; germline mutation and in sporadic cancers; somatic mutation; dbSNP:rs587780070.">
    <original>H</original>
    <variation>Y</variation>
    <location>
        <position position="179"/>
    </location>
</feature>
<feature type="sequence variant" id="VAR_044940" description="In a sporadic cancer; somatic mutation.">
    <original>E</original>
    <variation>A</variation>
    <location>
        <position position="180"/>
    </location>
</feature>
<feature type="sequence variant" id="VAR_044941" description="In sporadic cancers; somatic mutation.">
    <original>E</original>
    <variation>D</variation>
    <location>
        <position position="180"/>
    </location>
</feature>
<feature type="sequence variant" id="VAR_044942" description="In a sporadic cancer; somatic mutation.">
    <original>E</original>
    <variation>G</variation>
    <location>
        <position position="180"/>
    </location>
</feature>
<feature type="sequence variant" id="VAR_044943" description="In LFS; germline mutation and in sporadic cancers; somatic mutation; dbSNP:rs879253911.">
    <original>E</original>
    <variation>K</variation>
    <location>
        <position position="180"/>
    </location>
</feature>
<feature type="sequence variant" id="VAR_044944" description="In sporadic cancers; somatic mutation.">
    <original>E</original>
    <variation>Q</variation>
    <location>
        <position position="180"/>
    </location>
</feature>
<feature type="sequence variant" id="VAR_044945" description="In a sporadic cancer; somatic mutation.">
    <original>E</original>
    <variation>V</variation>
    <location>
        <position position="180"/>
    </location>
</feature>
<feature type="sequence variant" id="VAR_044946" description="In LFS; germline mutation and in sporadic cancers; somatic mutation; dbSNP:rs587782596.">
    <original>R</original>
    <variation>C</variation>
    <location>
        <position position="181"/>
    </location>
</feature>
<feature type="sequence variant" id="VAR_044947" description="In sporadic cancers; somatic mutation.">
    <original>R</original>
    <variation>G</variation>
    <location>
        <position position="181"/>
    </location>
</feature>
<feature type="sequence variant" id="VAR_044948" description="In LFS; germline mutation and in sporadic cancers; somatic mutation; dbSNP:rs397514495.">
    <original>R</original>
    <variation>H</variation>
    <location>
        <position position="181"/>
    </location>
</feature>
<feature type="sequence variant" id="VAR_005937" description="In a familial cancer not matching LFS; germline mutation and in sporadic cancers; somatic mutation; dbSNP:rs397514495.">
    <original>R</original>
    <variation>L</variation>
    <location>
        <position position="181"/>
    </location>
</feature>
<feature type="sequence variant" id="VAR_044949" description="In a familial cancer not matching LFS; germline mutation and in sporadic cancers; somatic mutation.">
    <original>R</original>
    <variation>P</variation>
    <location>
        <position position="181"/>
    </location>
</feature>
<feature type="sequence variant" id="VAR_044950" description="In sporadic cancers; somatic mutation; dbSNP:rs587782596.">
    <original>R</original>
    <variation>S</variation>
    <location>
        <position position="181"/>
    </location>
</feature>
<feature type="sequence variant" id="VAR_044951" description="In sporadic cancers; somatic mutation.">
    <original>C</original>
    <variation>R</variation>
    <location>
        <position position="182"/>
    </location>
</feature>
<feature type="sequence variant" id="VAR_005938" description="In sporadic cancers; somatic mutation.">
    <original>C</original>
    <variation>S</variation>
    <location>
        <position position="182"/>
    </location>
</feature>
<feature type="sequence variant" id="VAR_044952" description="In sporadic cancers; somatic mutation.">
    <original>C</original>
    <variation>Y</variation>
    <location>
        <position position="182"/>
    </location>
</feature>
<feature type="sequence variant" id="VAR_044953" description="In sporadic cancers; somatic mutation; dbSNP:rs1555525970.">
    <original>S</original>
    <variation>L</variation>
    <location>
        <position position="183"/>
    </location>
</feature>
<feature type="sequence variant" id="VAR_044954" description="In sporadic cancers; somatic mutation.">
    <original>S</original>
    <variation>P</variation>
    <location>
        <position position="183"/>
    </location>
</feature>
<feature type="sequence variant" id="VAR_044955" description="In sporadic cancers; somatic mutation; dbSNP:rs1060501209.">
    <original>D</original>
    <variation>G</variation>
    <location>
        <position position="184"/>
    </location>
</feature>
<feature type="sequence variant" id="VAR_044956" description="In sporadic cancers; somatic mutation.">
    <original>D</original>
    <variation>H</variation>
    <location>
        <position position="184"/>
    </location>
</feature>
<feature type="sequence variant" id="VAR_047169" description="In sporadic cancers; somatic mutation; dbSNP:rs72661117.">
    <original>D</original>
    <variation>N</variation>
    <location>
        <position position="184"/>
    </location>
</feature>
<feature type="sequence variant" id="VAR_044957" description="In sporadic cancers; somatic mutation.">
    <original>D</original>
    <variation>V</variation>
    <location>
        <position position="184"/>
    </location>
</feature>
<feature type="sequence variant" id="VAR_005939" description="In sporadic cancers; somatic mutation.">
    <original>D</original>
    <variation>Y</variation>
    <location>
        <position position="184"/>
    </location>
</feature>
<feature type="sequence variant" id="VAR_044958" description="In a sporadic cancer; somatic mutation.">
    <original>S</original>
    <variation>C</variation>
    <location>
        <position position="185"/>
    </location>
</feature>
<feature type="sequence variant" id="VAR_044959" description="In sporadic cancers; somatic mutation.">
    <original>S</original>
    <variation>G</variation>
    <location>
        <position position="185"/>
    </location>
</feature>
<feature type="sequence variant" id="VAR_044960" description="In sporadic cancers; somatic mutation.">
    <original>S</original>
    <variation>I</variation>
    <location>
        <position position="185"/>
    </location>
</feature>
<feature type="sequence variant" id="VAR_044961" description="In a sporadic cancer; somatic mutation; dbSNP:rs150607408.">
    <original>S</original>
    <variation>N</variation>
    <location>
        <position position="185"/>
    </location>
</feature>
<feature type="sequence variant" id="VAR_044962" description="In sporadic cancers; somatic mutation.">
    <original>S</original>
    <variation>R</variation>
    <location>
        <position position="185"/>
    </location>
</feature>
<feature type="sequence variant" id="VAR_044963" description="In a sporadic cancer; somatic mutation.">
    <original>S</original>
    <variation>T</variation>
    <location>
        <position position="185"/>
    </location>
</feature>
<feature type="sequence variant" id="VAR_044964" description="In a sporadic cancer; somatic mutation; dbSNP:rs375275361.">
    <original>D</original>
    <variation>E</variation>
    <location>
        <position position="186"/>
    </location>
</feature>
<feature type="sequence variant" id="VAR_044965" description="In sporadic cancers; somatic mutation.">
    <original>D</original>
    <variation>G</variation>
    <location>
        <position position="186"/>
    </location>
</feature>
<feature type="sequence variant" id="VAR_044966" description="In sporadic cancers; somatic mutation.">
    <original>D</original>
    <variation>H</variation>
    <location>
        <position position="186"/>
    </location>
</feature>
<feature type="sequence variant" id="VAR_044967" description="In sporadic cancers; somatic mutation; dbSNP:rs1060501206.">
    <original>D</original>
    <variation>N</variation>
    <location>
        <position position="186"/>
    </location>
</feature>
<feature type="sequence variant" id="VAR_044968" description="In sporadic cancers; somatic mutation.">
    <original>D</original>
    <variation>V</variation>
    <location>
        <position position="186"/>
    </location>
</feature>
<feature type="sequence variant" id="VAR_005940" description="In a sporadic cancer; somatic mutation.">
    <original>D</original>
    <variation>Y</variation>
    <location>
        <position position="186"/>
    </location>
</feature>
<feature type="sequence variant" id="VAR_005941" description="In sporadic cancers; somatic mutation.">
    <original>G</original>
    <variation>C</variation>
    <location>
        <position position="187"/>
    </location>
</feature>
<feature type="sequence variant" id="VAR_044969" description="In sporadic cancers; somatic mutation.">
    <original>G</original>
    <variation>D</variation>
    <location>
        <position position="187"/>
    </location>
</feature>
<feature type="sequence variant" id="VAR_045805" description="In a sporadic cancer; somatic mutation; requires 2 nucleotide substitutions.">
    <original>G</original>
    <variation>N</variation>
    <location>
        <position position="187"/>
    </location>
</feature>
<feature type="sequence variant" id="VAR_044970" description="In sporadic cancers; somatic mutation.">
    <original>G</original>
    <variation>R</variation>
    <location>
        <position position="187"/>
    </location>
</feature>
<feature type="sequence variant" id="VAR_005942" description="In sporadic cancers; somatic mutation; dbSNP:rs776167460.">
    <original>G</original>
    <variation>S</variation>
    <location>
        <position position="187"/>
    </location>
</feature>
<feature type="sequence variant" id="VAR_044971" description="In sporadic cancers; somatic mutation.">
    <original>G</original>
    <variation>V</variation>
    <location>
        <position position="187"/>
    </location>
</feature>
<feature type="sequence variant" id="VAR_044972" description="In a sporadic cancer; somatic mutation; dbSNP:rs1199893366.">
    <original>L</original>
    <variation>P</variation>
    <location>
        <position position="188"/>
    </location>
</feature>
<feature type="sequence variant" id="VAR_044973" description="In sporadic cancers; somatic mutation.">
    <original>L</original>
    <variation>V</variation>
    <location>
        <position position="188"/>
    </location>
</feature>
<feature type="sequence variant" id="VAR_044974" description="In a sporadic cancer; somatic mutation.">
    <original>A</original>
    <variation>D</variation>
    <location>
        <position position="189"/>
    </location>
</feature>
<feature type="sequence variant" id="VAR_044975" description="In sporadic cancers; somatic mutation.">
    <original>A</original>
    <variation>G</variation>
    <location>
        <position position="189"/>
    </location>
</feature>
<feature type="sequence variant" id="VAR_005943" description="In sporadic cancers; somatic mutation.">
    <original>A</original>
    <variation>P</variation>
    <location>
        <position position="189"/>
    </location>
</feature>
<feature type="sequence variant" id="VAR_044976" description="In a sporadic cancer; somatic mutation; dbSNP:rs1555525921.">
    <original>A</original>
    <variation>S</variation>
    <location>
        <position position="189"/>
    </location>
</feature>
<feature type="sequence variant" id="VAR_044977" description="In sporadic cancers; somatic mutation.">
    <original>A</original>
    <variation>T</variation>
    <location>
        <position position="189"/>
    </location>
</feature>
<feature type="sequence variant" id="VAR_044978" description="In a familial cancer not matching LFS; germline mutation and in sporadic cancers; somatic mutation; dbSNP:rs121912665.">
    <original>A</original>
    <variation>V</variation>
    <location>
        <position position="189"/>
    </location>
</feature>
<feature type="sequence variant" id="VAR_044979" description="In sporadic cancers; somatic mutation.">
    <original>P</original>
    <variation>A</variation>
    <location>
        <position position="190"/>
    </location>
</feature>
<feature type="sequence variant" id="VAR_044980" description="In a sporadic cancer; somatic mutation.">
    <original>P</original>
    <variation>H</variation>
    <location>
        <position position="190"/>
    </location>
</feature>
<feature type="sequence variant" id="VAR_005944" description="In sporadic cancers; somatic mutation; dbSNP:rs876660825.">
    <original>P</original>
    <variation>L</variation>
    <location>
        <position position="190"/>
    </location>
</feature>
<feature type="sequence variant" id="VAR_044981" description="In sporadic cancers; somatic mutation; dbSNP:rs876660825.">
    <original>P</original>
    <variation>R</variation>
    <location>
        <position position="190"/>
    </location>
</feature>
<feature type="sequence variant" id="VAR_044982" description="In sporadic cancers; somatic mutation.">
    <original>P</original>
    <variation>S</variation>
    <location>
        <position position="190"/>
    </location>
</feature>
<feature type="sequence variant" id="VAR_044983" description="In sporadic cancers; somatic mutation; dbSNP:rs876660254.">
    <original>P</original>
    <variation>T</variation>
    <location>
        <position position="190"/>
    </location>
</feature>
<feature type="sequence variant" id="VAR_044984" description="In sporadic cancers; somatic mutation; dbSNP:rs587778718.">
    <original>P</original>
    <variation>H</variation>
    <location>
        <position position="191"/>
    </location>
</feature>
<feature type="sequence variant" id="VAR_044985" description="In sporadic cancers; somatic mutation; dbSNP:rs587778718.">
    <original>P</original>
    <variation>L</variation>
    <location>
        <position position="191"/>
    </location>
</feature>
<feature type="sequence variant" id="VAR_044986" description="In sporadic cancers; somatic mutation; dbSNP:rs587778718.">
    <original>P</original>
    <variation>R</variation>
    <location>
        <position position="191"/>
    </location>
</feature>
<feature type="sequence variant" id="VAR_044987" description="In sporadic cancers; somatic mutation; dbSNP:rs868590738.">
    <original>P</original>
    <variation>S</variation>
    <location>
        <position position="191"/>
    </location>
</feature>
<feature type="sequence variant" id="VAR_005945" description="In sporadic cancers; somatic mutation.">
    <original>P</original>
    <variation>T</variation>
    <location>
        <position position="191"/>
    </location>
</feature>
<feature type="sequence variant" id="VAR_047170" description="In a sporadic cancer; somatic mutation.">
    <original>QH</original>
    <variation>HN</variation>
    <location>
        <begin position="192"/>
        <end position="193"/>
    </location>
</feature>
<feature type="sequence variant" id="VAR_047171" description="In a sporadic cancer; somatic mutation.">
    <original>QH</original>
    <variation>HY</variation>
    <location>
        <begin position="192"/>
        <end position="193"/>
    </location>
</feature>
<feature type="sequence variant" id="VAR_044988" description="In sporadic cancers; somatic mutation.">
    <original>Q</original>
    <variation>H</variation>
    <location>
        <position position="192"/>
    </location>
</feature>
<feature type="sequence variant" id="VAR_044989" description="In a sporadic cancer; somatic mutation.">
    <original>Q</original>
    <variation>K</variation>
    <location>
        <position position="192"/>
    </location>
</feature>
<feature type="sequence variant" id="VAR_044990" description="In sporadic cancers; somatic mutation.">
    <original>Q</original>
    <variation>L</variation>
    <location>
        <position position="192"/>
    </location>
</feature>
<feature type="sequence variant" id="VAR_044991" description="In sporadic cancers; somatic mutation.">
    <original>Q</original>
    <variation>P</variation>
    <location>
        <position position="192"/>
    </location>
</feature>
<feature type="sequence variant" id="VAR_005946" description="In sporadic cancers; somatic mutation; dbSNP:rs730882002.">
    <original>Q</original>
    <variation>R</variation>
    <location>
        <position position="192"/>
    </location>
</feature>
<feature type="sequence variant" id="VAR_005947" description="In sporadic cancers; somatic mutation; dbSNP:rs876658468.">
    <original>H</original>
    <variation>D</variation>
    <location>
        <position position="193"/>
    </location>
</feature>
<feature type="sequence variant" id="VAR_044992" description="In sporadic cancers; somatic mutation; dbSNP:rs786201838.">
    <original>H</original>
    <variation>L</variation>
    <location>
        <position position="193"/>
    </location>
</feature>
<feature type="sequence variant" id="VAR_044993" description="In sporadic cancers; somatic mutation; dbSNP:rs876658468.">
    <original>H</original>
    <variation>N</variation>
    <location>
        <position position="193"/>
    </location>
</feature>
<feature type="sequence variant" id="VAR_044994" description="In sporadic cancers; somatic mutation; dbSNP:rs786201838.">
    <original>H</original>
    <variation>P</variation>
    <location>
        <position position="193"/>
    </location>
</feature>
<feature type="sequence variant" id="VAR_044995" description="In sporadic cancers; somatic mutation.">
    <original>H</original>
    <variation>Q</variation>
    <location>
        <position position="193"/>
    </location>
</feature>
<feature type="sequence variant" id="VAR_005948" description="In LFS; germline mutation and in sporadic cancers; somatic mutation; dbSNP:rs786201838." evidence="65 172">
    <original>H</original>
    <variation>R</variation>
    <location>
        <position position="193"/>
    </location>
</feature>
<feature type="sequence variant" id="VAR_044996" description="In sporadic cancers; somatic mutation; dbSNP:rs876658468.">
    <original>H</original>
    <variation>Y</variation>
    <location>
        <position position="193"/>
    </location>
</feature>
<feature type="sequence variant" id="VAR_044997" description="In sporadic cancers; somatic mutation; dbSNP:rs587780071.">
    <original>L</original>
    <variation>F</variation>
    <location>
        <position position="194"/>
    </location>
</feature>
<feature type="sequence variant" id="VAR_044998" description="In sporadic cancers; somatic mutation; dbSNP:rs1057519998.">
    <original>L</original>
    <variation>H</variation>
    <location>
        <position position="194"/>
    </location>
</feature>
<feature type="sequence variant" id="VAR_044999" description="In sporadic cancers; somatic mutation.">
    <original>L</original>
    <variation>I</variation>
    <location>
        <position position="194"/>
    </location>
</feature>
<feature type="sequence variant" id="VAR_005949" description="In sporadic cancers; somatic mutation; dbSNP:rs1057519998.">
    <original>L</original>
    <variation>P</variation>
    <location>
        <position position="194"/>
    </location>
</feature>
<feature type="sequence variant" id="VAR_005950" description="In sporadic cancers; somatic mutation; dbSNP:rs1057519998." evidence="171">
    <original>L</original>
    <variation>R</variation>
    <location>
        <position position="194"/>
    </location>
</feature>
<feature type="sequence variant" id="VAR_045000" description="In sporadic cancers; somatic mutation.">
    <original>L</original>
    <variation>V</variation>
    <location>
        <position position="194"/>
    </location>
</feature>
<feature type="sequence variant" id="VAR_045001" description="In sporadic cancers; somatic mutation; dbSNP:rs942158624.">
    <original>I</original>
    <variation>F</variation>
    <location>
        <position position="195"/>
    </location>
</feature>
<feature type="sequence variant" id="VAR_047172" description="In a sporadic cancer; somatic mutation.">
    <original>I</original>
    <variation>L</variation>
    <location>
        <position position="195"/>
    </location>
</feature>
<feature type="sequence variant" id="VAR_045002" description="In sporadic cancers; somatic mutation; dbSNP:rs760043106.">
    <original>I</original>
    <variation>N</variation>
    <location>
        <position position="195"/>
    </location>
</feature>
<feature type="sequence variant" id="VAR_045003" description="In sporadic cancers; somatic mutation; dbSNP:rs760043106.">
    <original>I</original>
    <variation>S</variation>
    <location>
        <position position="195"/>
    </location>
</feature>
<feature type="sequence variant" id="VAR_005951" description="In sporadic cancers; somatic mutation; dbSNP:rs760043106." evidence="75 182">
    <original>I</original>
    <variation>T</variation>
    <location>
        <position position="195"/>
    </location>
</feature>
<feature type="sequence variant" id="VAR_045004" description="In a sporadic cancer; somatic mutation.">
    <original>I</original>
    <variation>V</variation>
    <location>
        <position position="195"/>
    </location>
</feature>
<feature type="sequence variant" id="VAR_045806" description="In a sporadic cancer; somatic mutation; requires 2 nucleotide substitutions.">
    <original>I</original>
    <variation>Y</variation>
    <location>
        <position position="195"/>
    </location>
</feature>
<feature type="sequence variant" id="VAR_045005" description="In sporadic cancers; somatic mutation; dbSNP:rs397516435.">
    <original>R</original>
    <variation>G</variation>
    <location>
        <position position="196"/>
    </location>
</feature>
<feature type="sequence variant" id="VAR_045006" description="In sporadic cancers; somatic mutation; dbSNP:rs483352697.">
    <original>R</original>
    <variation>L</variation>
    <location>
        <position position="196"/>
    </location>
</feature>
<feature type="sequence variant" id="VAR_045007" description="In LFS; germline mutation and in sporadic cancers; somatic mutation; dbSNP:rs483352697.">
    <original>R</original>
    <variation>P</variation>
    <location>
        <position position="196"/>
    </location>
</feature>
<feature type="sequence variant" id="VAR_045008" description="In sporadic cancers; somatic mutation; dbSNP:rs483352697.">
    <original>R</original>
    <variation>Q</variation>
    <location>
        <position position="196"/>
    </location>
</feature>
<feature type="sequence variant" id="VAR_045009" description="In a sporadic cancer; somatic mutation.">
    <original>R</original>
    <variation>S</variation>
    <location>
        <position position="196"/>
    </location>
</feature>
<feature type="sequence variant" id="VAR_045010" description="In a familial cancer not matching LFS; germline mutation and in sporadic cancers; somatic mutation.">
    <original>V</original>
    <variation>E</variation>
    <location>
        <position position="197"/>
    </location>
</feature>
<feature type="sequence variant" id="VAR_045011" description="In sporadic cancers; somatic mutation.">
    <original>V</original>
    <variation>G</variation>
    <location>
        <position position="197"/>
    </location>
</feature>
<feature type="sequence variant" id="VAR_045012" description="In sporadic cancers; somatic mutation; dbSNP:rs786204041.">
    <original>V</original>
    <variation>L</variation>
    <location>
        <position position="197"/>
    </location>
</feature>
<feature type="sequence variant" id="VAR_045013" description="In LFS; germline mutation and in sporadic cancers; somatic mutation; dbSNP:rs786204041.">
    <original>V</original>
    <variation>M</variation>
    <location>
        <position position="197"/>
    </location>
</feature>
<feature type="sequence variant" id="VAR_045014" description="In a sporadic cancer; somatic mutation.">
    <original>E</original>
    <variation>D</variation>
    <location>
        <position position="198"/>
    </location>
</feature>
<feature type="sequence variant" id="VAR_045015" description="In sporadic cancers; somatic mutation.">
    <original>E</original>
    <variation>G</variation>
    <location>
        <position position="198"/>
    </location>
</feature>
<feature type="sequence variant" id="VAR_005952" description="In sporadic cancers; somatic mutation.">
    <original>E</original>
    <variation>K</variation>
    <location>
        <position position="198"/>
    </location>
</feature>
<feature type="sequence variant" id="VAR_045016" description="In sporadic cancers; somatic mutation.">
    <original>E</original>
    <variation>Q</variation>
    <location>
        <position position="198"/>
    </location>
</feature>
<feature type="sequence variant" id="VAR_045017" description="In a sporadic cancer; somatic mutation.">
    <original>E</original>
    <variation>V</variation>
    <location>
        <position position="198"/>
    </location>
</feature>
<feature type="sequence variant" id="VAR_045018" description="In a sporadic cancer; somatic mutation.">
    <original>G</original>
    <variation>A</variation>
    <location>
        <position position="199"/>
    </location>
</feature>
<feature type="sequence variant" id="VAR_045019" description="In sporadic cancers; somatic mutation.">
    <original>G</original>
    <variation>E</variation>
    <location>
        <position position="199"/>
    </location>
</feature>
<feature type="sequence variant" id="VAR_045020" description="In sporadic cancers; somatic mutation.">
    <original>G</original>
    <variation>R</variation>
    <location>
        <position position="199"/>
    </location>
</feature>
<feature type="sequence variant" id="VAR_045021" description="In sporadic cancers; somatic mutation; dbSNP:rs1555525857.">
    <original>G</original>
    <variation>V</variation>
    <location>
        <position position="199"/>
    </location>
</feature>
<feature type="sequence variant" id="VAR_045022" description="In sporadic cancers; somatic mutation.">
    <original>N</original>
    <variation>D</variation>
    <location>
        <position position="200"/>
    </location>
</feature>
<feature type="sequence variant" id="VAR_045023" description="In sporadic cancers; somatic mutation.">
    <original>N</original>
    <variation>I</variation>
    <location>
        <position position="200"/>
    </location>
</feature>
<feature type="sequence variant" id="VAR_045024" description="In a sporadic cancer; somatic mutation.">
    <original>N</original>
    <variation>K</variation>
    <location>
        <position position="200"/>
    </location>
</feature>
<feature type="sequence variant" id="VAR_045807" description="In a sporadic cancer; somatic mutation; requires 2 nucleotide substitutions.">
    <original>N</original>
    <variation>P</variation>
    <location>
        <position position="200"/>
    </location>
</feature>
<feature type="sequence variant" id="VAR_045025" description="In sporadic cancers; somatic mutation.">
    <original>N</original>
    <variation>S</variation>
    <location>
        <position position="200"/>
    </location>
</feature>
<feature type="sequence variant" id="VAR_045026" description="In a sporadic cancer; somatic mutation.">
    <original>N</original>
    <variation>T</variation>
    <location>
        <position position="200"/>
    </location>
</feature>
<feature type="sequence variant" id="VAR_047173" description="In a sporadic cancer; somatic mutation.">
    <original>LR</original>
    <variation>FC</variation>
    <location>
        <begin position="201"/>
        <end position="202"/>
    </location>
</feature>
<feature type="sequence variant" id="VAR_045027" description="In sporadic cancers; somatic mutation; dbSNP:rs730882024.">
    <original>L</original>
    <variation>F</variation>
    <location>
        <position position="201"/>
    </location>
</feature>
<feature type="sequence variant" id="VAR_045028" description="In a sporadic cancer; somatic mutation.">
    <original>L</original>
    <variation>P</variation>
    <location>
        <position position="201"/>
    </location>
</feature>
<feature type="sequence variant" id="VAR_045029" description="In a sporadic cancer; somatic mutation.">
    <original>L</original>
    <variation>S</variation>
    <location>
        <position position="201"/>
    </location>
</feature>
<feature type="sequence variant" id="VAR_045030" description="In sporadic cancers; somatic mutation; dbSNP:rs587780072.">
    <original>R</original>
    <variation>C</variation>
    <location>
        <position position="202"/>
    </location>
</feature>
<feature type="sequence variant" id="VAR_045031" description="In sporadic cancers; somatic mutation; dbSNP:rs587780072.">
    <original>R</original>
    <variation>G</variation>
    <location>
        <position position="202"/>
    </location>
</feature>
<feature type="sequence variant" id="VAR_045032" description="In sporadic cancers; somatic mutation; dbSNP:rs587778719.">
    <original>R</original>
    <variation>H</variation>
    <location>
        <position position="202"/>
    </location>
</feature>
<feature type="sequence variant" id="VAR_045033" description="In sporadic cancers; somatic mutation; dbSNP:rs587778719.">
    <original>R</original>
    <variation>L</variation>
    <location>
        <position position="202"/>
    </location>
</feature>
<feature type="sequence variant" id="VAR_045034" description="In sporadic cancers; somatic mutation.">
    <original>R</original>
    <variation>P</variation>
    <location>
        <position position="202"/>
    </location>
</feature>
<feature type="sequence variant" id="VAR_045035" description="In sporadic cancers; somatic mutation.">
    <original>R</original>
    <variation>S</variation>
    <location>
        <position position="202"/>
    </location>
</feature>
<feature type="sequence variant" id="VAR_047174" description="In a sporadic cancer; somatic mutation.">
    <original>VE</original>
    <variation>LV</variation>
    <location>
        <begin position="203"/>
        <end position="204"/>
    </location>
</feature>
<feature type="sequence variant" id="VAR_045036" description="In sporadic cancers; somatic mutation.">
    <original>V</original>
    <variation>A</variation>
    <location>
        <position position="203"/>
    </location>
</feature>
<feature type="sequence variant" id="VAR_045037" description="In sporadic cancers; somatic mutation.">
    <original>V</original>
    <variation>E</variation>
    <location>
        <position position="203"/>
    </location>
</feature>
<feature type="sequence variant" id="VAR_045038" description="In sporadic cancers; somatic mutation.">
    <original>V</original>
    <variation>L</variation>
    <location>
        <position position="203"/>
    </location>
</feature>
<feature type="sequence variant" id="VAR_045039" description="In sporadic cancers; somatic mutation; dbSNP:rs730882003.">
    <original>V</original>
    <variation>M</variation>
    <location>
        <position position="203"/>
    </location>
</feature>
<feature type="sequence variant" id="VAR_045808" description="In a sporadic cancer; somatic mutation; requires 2 nucleotide substitutions.">
    <original>V</original>
    <variation>W</variation>
    <location>
        <position position="203"/>
    </location>
</feature>
<feature type="sequence variant" id="VAR_045040" description="In sporadic cancers; somatic mutation.">
    <original>E</original>
    <variation>A</variation>
    <location>
        <position position="204"/>
    </location>
</feature>
<feature type="sequence variant" id="VAR_045041" description="In sporadic cancers; somatic mutation.">
    <original>E</original>
    <variation>D</variation>
    <location>
        <position position="204"/>
    </location>
</feature>
<feature type="sequence variant" id="VAR_045042" description="In sporadic cancers; somatic mutation; dbSNP:rs1260903787.">
    <original>E</original>
    <variation>G</variation>
    <location>
        <position position="204"/>
    </location>
</feature>
<feature type="sequence variant" id="VAR_045043" description="In sporadic cancers; somatic mutation.">
    <original>E</original>
    <variation>K</variation>
    <location>
        <position position="204"/>
    </location>
</feature>
<feature type="sequence variant" id="VAR_045044" description="In a sporadic cancer; somatic mutation.">
    <original>E</original>
    <variation>Q</variation>
    <location>
        <position position="204"/>
    </location>
</feature>
<feature type="sequence variant" id="VAR_045045" description="In a sporadic cancer; somatic mutation.">
    <original>E</original>
    <variation>V</variation>
    <location>
        <position position="204"/>
    </location>
</feature>
<feature type="sequence variant" id="VAR_005953" description="In sporadic cancers; somatic mutation; dbSNP:rs1057520007." evidence="34">
    <original>Y</original>
    <variation>C</variation>
    <location>
        <position position="205"/>
    </location>
</feature>
<feature type="sequence variant" id="VAR_005954" description="In sporadic cancers; somatic mutation; dbSNP:rs1057520008.">
    <original>Y</original>
    <variation>D</variation>
    <location>
        <position position="205"/>
    </location>
</feature>
<feature type="sequence variant" id="VAR_047175" description="In sporadic cancers; somatic mutation; dbSNP:rs1057520007.">
    <original>Y</original>
    <variation>F</variation>
    <location>
        <position position="205"/>
    </location>
</feature>
<feature type="sequence variant" id="VAR_045046" description="In sporadic cancers; somatic mutation; dbSNP:rs1057520008.">
    <original>Y</original>
    <variation>H</variation>
    <location>
        <position position="205"/>
    </location>
</feature>
<feature type="sequence variant" id="VAR_045047" description="In sporadic cancers; somatic mutation; dbSNP:rs1057520008.">
    <original>Y</original>
    <variation>N</variation>
    <location>
        <position position="205"/>
    </location>
</feature>
<feature type="sequence variant" id="VAR_045048" description="In sporadic cancers; somatic mutation; dbSNP:rs1057520007.">
    <original>Y</original>
    <variation>S</variation>
    <location>
        <position position="205"/>
    </location>
</feature>
<feature type="sequence variant" id="VAR_045049" description="In a sporadic cancer; somatic mutation.">
    <original>L</original>
    <variation>F</variation>
    <location>
        <position position="206"/>
    </location>
</feature>
<feature type="sequence variant" id="VAR_045050" description="In a sporadic cancer; somatic mutation.">
    <original>L</original>
    <variation>M</variation>
    <location>
        <position position="206"/>
    </location>
</feature>
<feature type="sequence variant" id="VAR_047176" description="In a sporadic cancer; somatic mutation.">
    <original>DD</original>
    <variation>EY</variation>
    <location>
        <begin position="207"/>
        <end position="208"/>
    </location>
</feature>
<feature type="sequence variant" id="VAR_045051" description="In sporadic cancers; somatic mutation.">
    <original>D</original>
    <variation>E</variation>
    <location>
        <position position="207"/>
    </location>
</feature>
<feature type="sequence variant" id="VAR_045052" description="In sporadic cancers; somatic mutation.">
    <original>D</original>
    <variation>G</variation>
    <location>
        <position position="207"/>
    </location>
</feature>
<feature type="sequence variant" id="VAR_045053" description="In sporadic cancers; somatic mutation.">
    <original>D</original>
    <variation>H</variation>
    <location>
        <position position="207"/>
    </location>
</feature>
<feature type="sequence variant" id="VAR_045054" description="In sporadic cancers; somatic mutation; dbSNP:rs923100890.">
    <original>D</original>
    <variation>N</variation>
    <location>
        <position position="207"/>
    </location>
</feature>
<feature type="sequence variant" id="VAR_045055" description="In a sporadic cancer; somatic mutation.">
    <original>D</original>
    <variation>V</variation>
    <location>
        <position position="207"/>
    </location>
</feature>
<feature type="sequence variant" id="VAR_045056" description="In a sporadic cancer; somatic mutation.">
    <original>D</original>
    <variation>Y</variation>
    <location>
        <position position="207"/>
    </location>
</feature>
<feature type="sequence variant" id="VAR_045057" description="In sporadic cancers; somatic mutation.">
    <original>D</original>
    <variation>E</variation>
    <location>
        <position position="208"/>
    </location>
</feature>
<feature type="sequence variant" id="VAR_045058" description="In sporadic cancers; somatic mutation.">
    <original>D</original>
    <variation>G</variation>
    <location>
        <position position="208"/>
    </location>
</feature>
<feature type="sequence variant" id="VAR_045059" description="In a sporadic cancer; somatic mutation.">
    <original>D</original>
    <variation>H</variation>
    <location>
        <position position="208"/>
    </location>
</feature>
<feature type="sequence variant" id="VAR_045809" description="In a sporadic cancer; somatic mutation; requires 2 nucleotide substitutions.">
    <original>D</original>
    <variation>I</variation>
    <location>
        <position position="208"/>
    </location>
</feature>
<feature type="sequence variant" id="VAR_045060" description="In sporadic cancers; somatic mutation.">
    <original>D</original>
    <variation>N</variation>
    <location>
        <position position="208"/>
    </location>
</feature>
<feature type="sequence variant" id="VAR_045061" description="In sporadic cancers; somatic mutation; dbSNP:rs1464727668.">
    <original>D</original>
    <variation>V</variation>
    <location>
        <position position="208"/>
    </location>
</feature>
<feature type="sequence variant" id="VAR_045062" description="In a sporadic cancer; somatic mutation.">
    <original>D</original>
    <variation>Y</variation>
    <location>
        <position position="208"/>
    </location>
</feature>
<feature type="sequence variant" id="VAR_045063" description="In sporadic cancers; somatic mutation.">
    <original>R</original>
    <variation>I</variation>
    <location>
        <position position="209"/>
    </location>
</feature>
<feature type="sequence variant" id="VAR_045064" description="In sporadic cancers; somatic mutation.">
    <original>R</original>
    <variation>K</variation>
    <location>
        <position position="209"/>
    </location>
</feature>
<feature type="sequence variant" id="VAR_045065" description="In a sporadic cancer; somatic mutation.">
    <original>R</original>
    <variation>S</variation>
    <location>
        <position position="209"/>
    </location>
</feature>
<feature type="sequence variant" id="VAR_045066" description="In sporadic cancers; somatic mutation.">
    <original>R</original>
    <variation>T</variation>
    <location>
        <position position="209"/>
    </location>
</feature>
<feature type="sequence variant" id="VAR_045067" description="In sporadic cancers; somatic mutation.">
    <original>N</original>
    <variation>D</variation>
    <location>
        <position position="210"/>
    </location>
</feature>
<feature type="sequence variant" id="VAR_045068" description="In sporadic cancers; somatic mutation.">
    <original>N</original>
    <variation>H</variation>
    <location>
        <position position="210"/>
    </location>
</feature>
<feature type="sequence variant" id="VAR_045069" description="In a sporadic cancer; somatic mutation.">
    <original>N</original>
    <variation>I</variation>
    <location>
        <position position="210"/>
    </location>
</feature>
<feature type="sequence variant" id="VAR_045070" description="In a sporadic cancer; somatic mutation.">
    <original>N</original>
    <variation>K</variation>
    <location>
        <position position="210"/>
    </location>
</feature>
<feature type="sequence variant" id="VAR_045071" description="In sporadic cancers; somatic mutation.">
    <original>N</original>
    <variation>S</variation>
    <location>
        <position position="210"/>
    </location>
</feature>
<feature type="sequence variant" id="VAR_045072" description="In a sporadic cancer; somatic mutation.">
    <original>N</original>
    <variation>T</variation>
    <location>
        <position position="210"/>
    </location>
</feature>
<feature type="sequence variant" id="VAR_045073" description="In a familial cancer not matching LFS; germline mutation; dbSNP:rs1060501200.">
    <original>N</original>
    <variation>Y</variation>
    <location>
        <position position="210"/>
    </location>
</feature>
<feature type="sequence variant" id="VAR_045074" description="In sporadic cancers; somatic mutation; dbSNP:rs1060501198.">
    <original>T</original>
    <variation>A</variation>
    <location>
        <position position="211"/>
    </location>
</feature>
<feature type="sequence variant" id="VAR_045075" description="In sporadic cancers; somatic mutation.">
    <original>T</original>
    <variation>I</variation>
    <location>
        <position position="211"/>
    </location>
</feature>
<feature type="sequence variant" id="VAR_045076" description="In sporadic cancers; somatic mutation.">
    <original>T</original>
    <variation>N</variation>
    <location>
        <position position="211"/>
    </location>
</feature>
<feature type="sequence variant" id="VAR_045077" description="In a sporadic cancer; somatic mutation.">
    <original>T</original>
    <variation>P</variation>
    <location>
        <position position="211"/>
    </location>
</feature>
<feature type="sequence variant" id="VAR_045078" description="In sporadic cancers; somatic mutation.">
    <original>T</original>
    <variation>S</variation>
    <location>
        <position position="211"/>
    </location>
</feature>
<feature type="sequence variant" id="VAR_045079" description="In sporadic cancers; somatic mutation; dbSNP:rs1064795766.">
    <original>F</original>
    <variation>I</variation>
    <location>
        <position position="212"/>
    </location>
</feature>
<feature type="sequence variant" id="VAR_045080" description="In sporadic cancers; somatic mutation.">
    <original>F</original>
    <variation>L</variation>
    <location>
        <position position="212"/>
    </location>
</feature>
<feature type="sequence variant" id="VAR_045081" description="In sporadic cancers; somatic mutation.">
    <original>F</original>
    <variation>S</variation>
    <location>
        <position position="212"/>
    </location>
</feature>
<feature type="sequence variant" id="VAR_045082" description="In a sporadic cancer; somatic mutation.">
    <original>F</original>
    <variation>V</variation>
    <location>
        <position position="212"/>
    </location>
</feature>
<feature type="sequence variant" id="VAR_045083" description="In sporadic cancers; somatic mutation.">
    <original>F</original>
    <variation>Y</variation>
    <location>
        <position position="212"/>
    </location>
</feature>
<feature type="sequence variant" id="VAR_045084" description="In sporadic cancers; somatic mutation; dbSNP:rs397516436.">
    <original>R</original>
    <variation>G</variation>
    <location>
        <position position="213"/>
    </location>
</feature>
<feature type="sequence variant" id="VAR_045085" description="In sporadic cancers; somatic mutation; dbSNP:rs587778720.">
    <original>R</original>
    <variation>L</variation>
    <location>
        <position position="213"/>
    </location>
</feature>
<feature type="sequence variant" id="VAR_036506" description="In LFS; germline mutation and in sporadic cancers; somatic mutation; dbSNP:rs587778720." evidence="65">
    <original>R</original>
    <variation>P</variation>
    <location>
        <position position="213"/>
    </location>
</feature>
<feature type="sequence variant" id="VAR_005955" description="In LFS; germline mutation and in sporadic cancers; somatic mutation; dbSNP:rs587778720.">
    <original>R</original>
    <variation>Q</variation>
    <location>
        <position position="213"/>
    </location>
</feature>
<feature type="sequence variant" id="VAR_045086" description="In sporadic cancers; somatic mutation.">
    <original>R</original>
    <variation>W</variation>
    <location>
        <position position="213"/>
    </location>
</feature>
<feature type="sequence variant" id="VAR_045087" description="In sporadic cancers; somatic mutation.">
    <original>H</original>
    <variation>D</variation>
    <location>
        <position position="214"/>
    </location>
</feature>
<feature type="sequence variant" id="VAR_045088" description="In a sporadic cancer; somatic mutation; dbSNP:rs1057519992.">
    <original>H</original>
    <variation>P</variation>
    <location>
        <position position="214"/>
    </location>
</feature>
<feature type="sequence variant" id="VAR_047177" description="In sporadic cancers; somatic mutation; dbSNP:rs587781386.">
    <original>H</original>
    <variation>Q</variation>
    <location>
        <position position="214"/>
    </location>
</feature>
<feature type="sequence variant" id="VAR_045089" description="In sporadic cancers; somatic mutation; dbSNP:rs1057519992.">
    <original>H</original>
    <variation>R</variation>
    <location>
        <position position="214"/>
    </location>
</feature>
<feature type="sequence variant" id="VAR_045090" description="In sporadic cancers; somatic mutation.">
    <original>H</original>
    <variation>Y</variation>
    <location>
        <position position="214"/>
    </location>
</feature>
<feature type="sequence variant" id="VAR_045091" description="In sporadic cancers; somatic mutation.">
    <original>S</original>
    <variation>C</variation>
    <location>
        <position position="215"/>
    </location>
</feature>
<feature type="sequence variant" id="VAR_045092" description="In sporadic cancers; somatic mutation; dbSNP:rs886039484.">
    <original>S</original>
    <variation>G</variation>
    <location>
        <position position="215"/>
    </location>
</feature>
<feature type="sequence variant" id="VAR_045093" description="In sporadic cancers; somatic mutation; dbSNP:rs587782177.">
    <original>S</original>
    <variation>I</variation>
    <location>
        <position position="215"/>
    </location>
</feature>
<feature type="sequence variant" id="VAR_045810" description="In sporadic cancers; somatic mutation; requires 2 nucleotide substitutions.">
    <original>S</original>
    <variation>K</variation>
    <location>
        <position position="215"/>
    </location>
</feature>
<feature type="sequence variant" id="VAR_045094" description="In sporadic cancers; somatic mutation; dbSNP:rs587782177.">
    <original>S</original>
    <variation>N</variation>
    <location>
        <position position="215"/>
    </location>
</feature>
<feature type="sequence variant" id="VAR_045095" description="In sporadic cancers; somatic mutation; dbSNP:rs1057520001.">
    <original>S</original>
    <variation>R</variation>
    <location>
        <position position="215"/>
    </location>
</feature>
<feature type="sequence variant" id="VAR_045096" description="In sporadic cancers; somatic mutation; dbSNP:rs587782177.">
    <original>S</original>
    <variation>T</variation>
    <location>
        <position position="215"/>
    </location>
</feature>
<feature type="sequence variant" id="VAR_045097" description="In sporadic cancers; somatic mutation.">
    <original>V</original>
    <variation>A</variation>
    <location>
        <position position="216"/>
    </location>
</feature>
<feature type="sequence variant" id="VAR_045098" description="In sporadic cancers; somatic mutation; dbSNP:rs1057520004.">
    <original>V</original>
    <variation>E</variation>
    <location>
        <position position="216"/>
    </location>
</feature>
<feature type="sequence variant" id="VAR_045099" description="In sporadic cancers; somatic mutation; dbSNP:rs1057520004.">
    <original>V</original>
    <variation>G</variation>
    <location>
        <position position="216"/>
    </location>
</feature>
<feature type="sequence variant" id="VAR_045100" description="In sporadic cancers; somatic mutation; dbSNP:rs730882025.">
    <original>V</original>
    <variation>L</variation>
    <location>
        <position position="216"/>
    </location>
</feature>
<feature type="sequence variant" id="VAR_005956" description="In sporadic cancers; somatic mutation; dbSNP:rs730882025." evidence="75">
    <original>V</original>
    <variation>M</variation>
    <location>
        <position position="216"/>
    </location>
</feature>
<feature type="sequence variant" id="VAR_045811" description="In a sporadic cancer; somatic mutation; requires 2 nucleotide substitutions.">
    <original>V</original>
    <variation>W</variation>
    <location>
        <position position="216"/>
    </location>
</feature>
<feature type="sequence variant" id="VAR_045101" description="In sporadic cancers; somatic mutation.">
    <original>V</original>
    <variation>A</variation>
    <location>
        <position position="217"/>
    </location>
</feature>
<feature type="sequence variant" id="VAR_045102" description="In sporadic cancers; somatic mutation.">
    <original>V</original>
    <variation>E</variation>
    <location>
        <position position="217"/>
    </location>
</feature>
<feature type="sequence variant" id="VAR_045103" description="In sporadic cancers; somatic mutation.">
    <original>V</original>
    <variation>G</variation>
    <location>
        <position position="217"/>
    </location>
</feature>
<feature type="sequence variant" id="VAR_045104" description="In a sporadic cancer; somatic mutation.">
    <original>V</original>
    <variation>I</variation>
    <location>
        <position position="217"/>
    </location>
</feature>
<feature type="sequence variant" id="VAR_045105" description="In sporadic cancers; somatic mutation.">
    <original>V</original>
    <variation>L</variation>
    <location>
        <position position="217"/>
    </location>
</feature>
<feature type="sequence variant" id="VAR_047178" description="In dbSNP:rs35163653.">
    <original>V</original>
    <variation>M</variation>
    <location>
        <position position="217"/>
    </location>
</feature>
<feature type="sequence variant" id="VAR_045106" description="In sporadic cancers; somatic mutation.">
    <original>V</original>
    <variation>A</variation>
    <location>
        <position position="218"/>
    </location>
</feature>
<feature type="sequence variant" id="VAR_045107" description="In sporadic cancers; somatic mutation.">
    <original>V</original>
    <variation>E</variation>
    <location>
        <position position="218"/>
    </location>
</feature>
<feature type="sequence variant" id="VAR_045108" description="In sporadic cancers; somatic mutation; dbSNP:rs1555525743.">
    <original>V</original>
    <variation>G</variation>
    <location>
        <position position="218"/>
    </location>
</feature>
<feature type="sequence variant" id="VAR_045109" description="In sporadic cancers; somatic mutation.">
    <original>V</original>
    <variation>L</variation>
    <location>
        <position position="218"/>
    </location>
</feature>
<feature type="sequence variant" id="VAR_045110" description="In sporadic cancers; somatic mutation; dbSNP:rs878854072.">
    <original>V</original>
    <variation>M</variation>
    <location>
        <position position="218"/>
    </location>
</feature>
<feature type="sequence variant" id="VAR_045812" description="In a sporadic cancer; somatic mutation; requires 2 nucleotide substitutions.">
    <original>P</original>
    <variation>C</variation>
    <location>
        <position position="219"/>
    </location>
</feature>
<feature type="sequence variant" id="VAR_045111" description="In a sporadic cancer; somatic mutation.">
    <original>P</original>
    <variation>H</variation>
    <location>
        <position position="219"/>
    </location>
</feature>
<feature type="sequence variant" id="VAR_045112" description="In sporadic cancers; somatic mutation; dbSNP:rs1420675064.">
    <original>P</original>
    <variation>L</variation>
    <location>
        <position position="219"/>
    </location>
</feature>
<feature type="sequence variant" id="VAR_045113" description="In a sporadic cancer; somatic mutation.">
    <original>P</original>
    <variation>R</variation>
    <location>
        <position position="219"/>
    </location>
</feature>
<feature type="sequence variant" id="VAR_045114" description="In a familial cancer not matching LFS; germline mutation and in sporadic cancers; somatic mutation; dbSNP:rs879253894.">
    <original>P</original>
    <variation>S</variation>
    <location>
        <position position="219"/>
    </location>
</feature>
<feature type="sequence variant" id="VAR_045115" description="In sporadic cancers; somatic mutation.">
    <original>P</original>
    <variation>T</variation>
    <location>
        <position position="219"/>
    </location>
</feature>
<feature type="sequence variant" id="VAR_005957" description="In LFS; germline mutation and in sporadic cancers; somatic mutation; dbSNP:rs121912666." evidence="171 182">
    <original>Y</original>
    <variation>C</variation>
    <location>
        <position position="220"/>
    </location>
</feature>
<feature type="sequence variant" id="VAR_045116" description="In sporadic cancers; somatic mutation; dbSNP:rs530941076.">
    <original>Y</original>
    <variation>D</variation>
    <location>
        <position position="220"/>
    </location>
</feature>
<feature type="sequence variant" id="VAR_045117" description="In a sporadic cancer; somatic mutation.">
    <original>Y</original>
    <variation>F</variation>
    <location>
        <position position="220"/>
    </location>
</feature>
<feature type="sequence variant" id="VAR_005958" description="In sporadic cancers; somatic mutation; dbSNP:rs530941076.">
    <original>Y</original>
    <variation>H</variation>
    <location>
        <position position="220"/>
    </location>
</feature>
<feature type="sequence variant" id="VAR_045118" description="In sporadic cancers; somatic mutation; dbSNP:rs530941076.">
    <original>Y</original>
    <variation>N</variation>
    <location>
        <position position="220"/>
    </location>
</feature>
<feature type="sequence variant" id="VAR_005959" description="In a brain tumor with no family history; germline mutation and in sporadic cancers; somatic mutation; dbSNP:rs121912666.">
    <original>Y</original>
    <variation>S</variation>
    <location>
        <position position="220"/>
    </location>
</feature>
<feature type="sequence variant" id="VAR_045119" description="In sporadic cancers; somatic mutation.">
    <original>E</original>
    <variation>A</variation>
    <location>
        <position position="221"/>
    </location>
</feature>
<feature type="sequence variant" id="VAR_045120" description="In sporadic cancers; somatic mutation.">
    <original>E</original>
    <variation>D</variation>
    <location>
        <position position="221"/>
    </location>
</feature>
<feature type="sequence variant" id="VAR_045121" description="In sporadic cancers; somatic mutation.">
    <original>E</original>
    <variation>G</variation>
    <location>
        <position position="221"/>
    </location>
</feature>
<feature type="sequence variant" id="VAR_045122" description="In sporadic cancers; somatic mutation; dbSNP:rs786201592.">
    <original>E</original>
    <variation>K</variation>
    <location>
        <position position="221"/>
    </location>
</feature>
<feature type="sequence variant" id="VAR_045123" description="In sporadic cancers; somatic mutation.">
    <original>E</original>
    <variation>Q</variation>
    <location>
        <position position="221"/>
    </location>
</feature>
<feature type="sequence variant" id="VAR_045124" description="In a sporadic cancer; somatic mutation.">
    <original>P</original>
    <variation>A</variation>
    <location>
        <position position="222"/>
    </location>
</feature>
<feature type="sequence variant" id="VAR_045125" description="In sporadic cancers; somatic mutation; dbSNP:rs146340390.">
    <original>P</original>
    <variation>L</variation>
    <location>
        <position position="222"/>
    </location>
</feature>
<feature type="sequence variant" id="VAR_045126" description="In sporadic cancers; somatic mutation.">
    <original>P</original>
    <variation>Q</variation>
    <location>
        <position position="222"/>
    </location>
</feature>
<feature type="sequence variant" id="VAR_045127" description="In a sporadic cancer; somatic mutation.">
    <original>P</original>
    <variation>R</variation>
    <location>
        <position position="222"/>
    </location>
</feature>
<feature type="sequence variant" id="VAR_045128" description="In sporadic cancers; somatic mutation; dbSNP:rs1060501203.">
    <original>P</original>
    <variation>S</variation>
    <location>
        <position position="222"/>
    </location>
</feature>
<feature type="sequence variant" id="VAR_045129" description="In sporadic cancers; somatic mutation.">
    <original>P</original>
    <variation>T</variation>
    <location>
        <position position="222"/>
    </location>
</feature>
<feature type="sequence variant" id="VAR_047179" description="In a sporadic cancer; somatic mutation.">
    <original>P</original>
    <variation>A</variation>
    <location>
        <position position="223"/>
    </location>
</feature>
<feature type="sequence variant" id="VAR_045130" description="In sporadic cancers; somatic mutation; dbSNP:rs138983188.">
    <original>P</original>
    <variation>H</variation>
    <location>
        <position position="223"/>
    </location>
</feature>
<feature type="sequence variant" id="VAR_045131" description="In sporadic cancers; somatic mutation; dbSNP:rs138983188.">
    <original>P</original>
    <variation>L</variation>
    <location>
        <position position="223"/>
    </location>
</feature>
<feature type="sequence variant" id="VAR_045132" description="In a sporadic cancer; somatic mutation.">
    <original>P</original>
    <variation>R</variation>
    <location>
        <position position="223"/>
    </location>
</feature>
<feature type="sequence variant" id="VAR_045133" description="In a sporadic cancer; somatic mutation.">
    <original>P</original>
    <variation>S</variation>
    <location>
        <position position="223"/>
    </location>
</feature>
<feature type="sequence variant" id="VAR_045134" description="In a sporadic cancer; somatic mutation.">
    <original>P</original>
    <variation>T</variation>
    <location>
        <position position="223"/>
    </location>
</feature>
<feature type="sequence variant" id="VAR_045135" description="In sporadic cancers; somatic mutation; dbSNP:rs267605076.">
    <original>E</original>
    <variation>D</variation>
    <location>
        <position position="224"/>
    </location>
</feature>
<feature type="sequence variant" id="VAR_045136" description="In sporadic cancers; somatic mutation.">
    <original>E</original>
    <variation>G</variation>
    <location>
        <position position="224"/>
    </location>
</feature>
<feature type="sequence variant" id="VAR_045137" description="In sporadic cancers; somatic mutation; dbSNP:rs1555525707.">
    <original>E</original>
    <variation>K</variation>
    <location>
        <position position="224"/>
    </location>
</feature>
<feature type="sequence variant" id="VAR_045138" description="In a sporadic cancer; somatic mutation.">
    <original>E</original>
    <variation>V</variation>
    <location>
        <position position="224"/>
    </location>
</feature>
<feature type="sequence variant" id="VAR_045139" description="In sporadic cancers; somatic mutation.">
    <original>V</original>
    <variation>A</variation>
    <location>
        <position position="225"/>
    </location>
</feature>
<feature type="sequence variant" id="VAR_045140" description="In a sporadic cancer; somatic mutation.">
    <original>V</original>
    <variation>D</variation>
    <location>
        <position position="225"/>
    </location>
</feature>
<feature type="sequence variant" id="VAR_045141" description="In sporadic cancers; somatic mutation.">
    <original>V</original>
    <variation>F</variation>
    <location>
        <position position="225"/>
    </location>
</feature>
<feature type="sequence variant" id="VAR_045142" description="In a sporadic cancer; somatic mutation.">
    <original>V</original>
    <variation>G</variation>
    <location>
        <position position="225"/>
    </location>
</feature>
<feature type="sequence variant" id="VAR_045143" description="In sporadic cancers; somatic mutation.">
    <original>V</original>
    <variation>I</variation>
    <location>
        <position position="225"/>
    </location>
</feature>
<feature type="sequence variant" id="VAR_045144" description="In a sporadic cancer; somatic mutation; dbSNP:rs746504075.">
    <original>V</original>
    <variation>L</variation>
    <location>
        <position position="225"/>
    </location>
</feature>
<feature type="sequence variant" id="VAR_045145" description="In sporadic cancers; somatic mutation.">
    <original>G</original>
    <variation>A</variation>
    <location>
        <position position="226"/>
    </location>
</feature>
<feature type="sequence variant" id="VAR_047180" description="In sporadic cancers; somatic mutation.">
    <original>G</original>
    <variation>D</variation>
    <location>
        <position position="226"/>
    </location>
</feature>
<feature type="sequence variant" id="VAR_045844" description="In a sporadic cancer; somatic mutation; requires 2 nucleotide substitutions.">
    <original>G</original>
    <variation>N</variation>
    <location>
        <position position="226"/>
    </location>
</feature>
<feature type="sequence variant" id="VAR_045146" description="In sporadic cancers; somatic mutation.">
    <original>G</original>
    <variation>S</variation>
    <location>
        <position position="226"/>
    </location>
</feature>
<feature type="sequence variant" id="VAR_045147" description="In sporadic cancers; somatic mutation; dbSNP:rs970212462.">
    <original>G</original>
    <variation>V</variation>
    <location>
        <position position="226"/>
    </location>
</feature>
<feature type="sequence variant" id="VAR_045148" description="In sporadic cancers; somatic mutation.">
    <original>S</original>
    <variation>C</variation>
    <location>
        <position position="227"/>
    </location>
</feature>
<feature type="sequence variant" id="VAR_045149" description="In sporadic cancers; somatic mutation.">
    <original>S</original>
    <variation>F</variation>
    <location>
        <position position="227"/>
    </location>
</feature>
<feature type="sequence variant" id="VAR_045150" description="In a sporadic cancer; somatic mutation.">
    <original>S</original>
    <variation>P</variation>
    <location>
        <position position="227"/>
    </location>
</feature>
<feature type="sequence variant" id="VAR_045151" description="In LFS; germline mutation and in a sporadic cancer; somatic mutation.">
    <original>S</original>
    <variation>T</variation>
    <location>
        <position position="227"/>
    </location>
</feature>
<feature type="sequence variant" id="VAR_045152" description="In sporadic cancers; somatic mutation.">
    <original>D</original>
    <variation>A</variation>
    <location>
        <position position="228"/>
    </location>
</feature>
<feature type="sequence variant" id="VAR_005960" description="In sporadic cancers; somatic mutation.">
    <original>D</original>
    <variation>E</variation>
    <location>
        <position position="228"/>
    </location>
</feature>
<feature type="sequence variant" id="VAR_045153" description="In sporadic cancers; somatic mutation.">
    <original>D</original>
    <variation>G</variation>
    <location>
        <position position="228"/>
    </location>
</feature>
<feature type="sequence variant" id="VAR_045154" description="In sporadic cancers; somatic mutation.">
    <original>D</original>
    <variation>H</variation>
    <location>
        <position position="228"/>
    </location>
</feature>
<feature type="sequence variant" id="VAR_045155" description="In sporadic cancers; somatic mutation.">
    <original>D</original>
    <variation>N</variation>
    <location>
        <position position="228"/>
    </location>
</feature>
<feature type="sequence variant" id="VAR_045845" description="In a sporadic cancer; somatic mutation; requires 2 nucleotide substitutions.">
    <original>D</original>
    <variation>P</variation>
    <location>
        <position position="228"/>
    </location>
</feature>
<feature type="sequence variant" id="VAR_045156" description="In sporadic cancers; somatic mutation.">
    <original>D</original>
    <variation>V</variation>
    <location>
        <position position="228"/>
    </location>
</feature>
<feature type="sequence variant" id="VAR_045157" description="In sporadic cancers; somatic mutation.">
    <original>D</original>
    <variation>Y</variation>
    <location>
        <position position="228"/>
    </location>
</feature>
<feature type="sequence variant" id="VAR_045158" description="In a sporadic cancer; somatic mutation.">
    <original>C</original>
    <variation>G</variation>
    <location>
        <position position="229"/>
    </location>
</feature>
<feature type="sequence variant" id="VAR_045846" description="In a sporadic cancer; somatic mutation; requires 2 nucleotide substitutions.">
    <original>C</original>
    <variation>N</variation>
    <location>
        <position position="229"/>
    </location>
</feature>
<feature type="sequence variant" id="VAR_045159" description="In sporadic cancers; somatic mutation; dbSNP:rs1064794312.">
    <original>C</original>
    <variation>R</variation>
    <location>
        <position position="229"/>
    </location>
</feature>
<feature type="sequence variant" id="VAR_045160" description="In sporadic cancers; somatic mutation.">
    <original>C</original>
    <variation>S</variation>
    <location>
        <position position="229"/>
    </location>
</feature>
<feature type="sequence variant" id="VAR_045161" description="In sporadic cancers; somatic mutation; dbSNP:rs1064793603.">
    <original>C</original>
    <variation>Y</variation>
    <location>
        <position position="229"/>
    </location>
</feature>
<feature type="sequence variant" id="VAR_045162" description="In sporadic cancers; somatic mutation.">
    <original>T</original>
    <variation>A</variation>
    <location>
        <position position="230"/>
    </location>
</feature>
<feature type="sequence variant" id="VAR_005961" description="In sporadic cancers; somatic mutation." evidence="182">
    <original>T</original>
    <variation>I</variation>
    <location>
        <position position="230"/>
    </location>
</feature>
<feature type="sequence variant" id="VAR_045163" description="In sporadic cancers; somatic mutation.">
    <original>T</original>
    <variation>N</variation>
    <location>
        <position position="230"/>
    </location>
</feature>
<feature type="sequence variant" id="VAR_045164" description="In sporadic cancers; somatic mutation.">
    <original>T</original>
    <variation>P</variation>
    <location>
        <position position="230"/>
    </location>
</feature>
<feature type="sequence variant" id="VAR_045165" description="In sporadic cancers; somatic mutation.">
    <original>T</original>
    <variation>S</variation>
    <location>
        <position position="230"/>
    </location>
</feature>
<feature type="sequence variant" id="VAR_045166" description="In sporadic cancers; somatic mutation.">
    <original>T</original>
    <variation>A</variation>
    <location>
        <position position="231"/>
    </location>
</feature>
<feature type="sequence variant" id="VAR_045167" description="In sporadic cancers; somatic mutation; dbSNP:rs1555525564.">
    <original>T</original>
    <variation>I</variation>
    <location>
        <position position="231"/>
    </location>
</feature>
<feature type="sequence variant" id="VAR_045168" description="In sporadic cancers; somatic mutation.">
    <original>T</original>
    <variation>N</variation>
    <location>
        <position position="231"/>
    </location>
</feature>
<feature type="sequence variant" id="VAR_045169" description="In sporadic cancers; somatic mutation.">
    <original>T</original>
    <variation>S</variation>
    <location>
        <position position="231"/>
    </location>
</feature>
<feature type="sequence variant" id="VAR_045170" description="In sporadic cancers; somatic mutation.">
    <original>I</original>
    <variation>F</variation>
    <location>
        <position position="232"/>
    </location>
</feature>
<feature type="sequence variant" id="VAR_045171" description="In sporadic cancers; somatic mutation; dbSNP:rs1555525562.">
    <original>I</original>
    <variation>L</variation>
    <location>
        <position position="232"/>
    </location>
</feature>
<feature type="sequence variant" id="VAR_045172" description="In sporadic cancers; somatic mutation.">
    <original>I</original>
    <variation>N</variation>
    <location>
        <position position="232"/>
    </location>
</feature>
<feature type="sequence variant" id="VAR_045173" description="In sporadic cancers; somatic mutation; does not induce SNAI1 degradation." evidence="121">
    <original>I</original>
    <variation>S</variation>
    <location>
        <position position="232"/>
    </location>
</feature>
<feature type="sequence variant" id="VAR_005962" description="In sporadic cancers; somatic mutation; dbSNP:rs587781589.">
    <original>I</original>
    <variation>T</variation>
    <location>
        <position position="232"/>
    </location>
</feature>
<feature type="sequence variant" id="VAR_045174" description="In sporadic cancers; somatic mutation.">
    <original>I</original>
    <variation>V</variation>
    <location>
        <position position="232"/>
    </location>
</feature>
<feature type="sequence variant" id="VAR_045175" description="In LFS; germline mutation and in a sporadic cancer; somatic mutation.">
    <original>H</original>
    <variation>D</variation>
    <location>
        <position position="233"/>
    </location>
</feature>
<feature type="sequence variant" id="VAR_045176" description="In sporadic cancers; somatic mutation.">
    <original>H</original>
    <variation>L</variation>
    <location>
        <position position="233"/>
    </location>
</feature>
<feature type="sequence variant" id="VAR_045177" description="In a sporadic cancer; somatic mutation.">
    <original>H</original>
    <variation>P</variation>
    <location>
        <position position="233"/>
    </location>
</feature>
<feature type="sequence variant" id="VAR_045178" description="In sporadic cancers; somatic mutation.">
    <original>H</original>
    <variation>Q</variation>
    <location>
        <position position="233"/>
    </location>
</feature>
<feature type="sequence variant" id="VAR_047181" description="In sporadic cancers; somatic mutation; dbSNP:rs879254233.">
    <original>H</original>
    <variation>R</variation>
    <location>
        <position position="233"/>
    </location>
</feature>
<feature type="sequence variant" id="VAR_045179" description="In sporadic cancers; somatic mutation.">
    <original>H</original>
    <variation>Y</variation>
    <location>
        <position position="233"/>
    </location>
</feature>
<feature type="sequence variant" id="VAR_005963" description="In LFS; germline mutation and in sporadic cancers; somatic mutation; dbSNP:rs587780073.">
    <original>Y</original>
    <variation>C</variation>
    <location>
        <position position="234"/>
    </location>
</feature>
<feature type="sequence variant" id="VAR_045180" description="In sporadic cancers; somatic mutation; dbSNP:rs864622237.">
    <original>Y</original>
    <variation>D</variation>
    <location>
        <position position="234"/>
    </location>
</feature>
<feature type="sequence variant" id="VAR_045181" description="In a sporadic cancer; somatic mutation.">
    <original>Y</original>
    <variation>F</variation>
    <location>
        <position position="234"/>
    </location>
</feature>
<feature type="sequence variant" id="VAR_005964" description="In sporadic cancers; somatic mutation; dbSNP:rs864622237.">
    <original>Y</original>
    <variation>H</variation>
    <location>
        <position position="234"/>
    </location>
</feature>
<feature type="sequence variant" id="VAR_045847" description="In a sporadic cancer; somatic mutation; requires 2 nucleotide substitutions.">
    <original>Y</original>
    <variation>K</variation>
    <location>
        <position position="234"/>
    </location>
</feature>
<feature type="sequence variant" id="VAR_045182" description="In sporadic cancers; somatic mutation; dbSNP:rs864622237.">
    <original>Y</original>
    <variation>N</variation>
    <location>
        <position position="234"/>
    </location>
</feature>
<feature type="sequence variant" id="VAR_045848" description="In a sporadic cancer; somatic mutation; requires 2 nucleotide substitutions.">
    <original>Y</original>
    <variation>Q</variation>
    <location>
        <position position="234"/>
    </location>
</feature>
<feature type="sequence variant" id="VAR_045183" description="In sporadic cancers; somatic mutation; dbSNP:rs587780073.">
    <original>Y</original>
    <variation>S</variation>
    <location>
        <position position="234"/>
    </location>
</feature>
<feature type="sequence variant" id="VAR_047182" description="In an adrenocortical carcinoma with no family history; germline mutation and in sporadic cancers; somatic mutation.">
    <original>N</original>
    <variation>D</variation>
    <location>
        <position position="235"/>
    </location>
</feature>
<feature type="sequence variant" id="VAR_045184" description="In a sporadic cancer; somatic mutation.">
    <original>N</original>
    <variation>H</variation>
    <location>
        <position position="235"/>
    </location>
</feature>
<feature type="sequence variant" id="VAR_045185" description="In sporadic cancers; somatic mutation; dbSNP:rs144340710.">
    <original>N</original>
    <variation>I</variation>
    <location>
        <position position="235"/>
    </location>
</feature>
<feature type="sequence variant" id="VAR_045849" description="In a sporadic cancer; somatic mutation; requires 2 nucleotide substitutions.">
    <original>N</original>
    <variation>M</variation>
    <location>
        <position position="235"/>
    </location>
</feature>
<feature type="sequence variant" id="VAR_045186" description="In LFS; germline mutation and in sporadic cancers; somatic mutation; dbSNP:rs144340710.">
    <original>N</original>
    <variation>S</variation>
    <location>
        <position position="235"/>
    </location>
</feature>
<feature type="sequence variant" id="VAR_045187" description="In sporadic cancers; somatic mutation.">
    <original>N</original>
    <variation>T</variation>
    <location>
        <position position="235"/>
    </location>
</feature>
<feature type="sequence variant" id="VAR_045188" description="In sporadic cancers; somatic mutation; dbSNP:rs786204145.">
    <original>N</original>
    <variation>Y</variation>
    <location>
        <position position="235"/>
    </location>
</feature>
<feature type="sequence variant" id="VAR_045189" description="In LFS; germline mutation and in sporadic cancers; somatic mutation; dbSNP:rs730882026.">
    <original>Y</original>
    <variation>C</variation>
    <location>
        <position position="236"/>
    </location>
</feature>
<feature type="sequence variant" id="VAR_045190" description="In sporadic cancers; somatic mutation; dbSNP:rs587782289.">
    <original>Y</original>
    <variation>D</variation>
    <location>
        <position position="236"/>
    </location>
</feature>
<feature type="sequence variant" id="VAR_045191" description="In a sporadic cancer; somatic mutation.">
    <original>Y</original>
    <variation>F</variation>
    <location>
        <position position="236"/>
    </location>
</feature>
<feature type="sequence variant" id="VAR_045192" description="In sporadic cancers; somatic mutation; dbSNP:rs587782289.">
    <original>Y</original>
    <variation>H</variation>
    <location>
        <position position="236"/>
    </location>
</feature>
<feature type="sequence variant" id="VAR_045193" description="In sporadic cancers; somatic mutation; dbSNP:rs587782289.">
    <original>Y</original>
    <variation>N</variation>
    <location>
        <position position="236"/>
    </location>
</feature>
<feature type="sequence variant" id="VAR_045194" description="In sporadic cancers; somatic mutation; dbSNP:rs730882026.">
    <original>Y</original>
    <variation>S</variation>
    <location>
        <position position="236"/>
    </location>
</feature>
<feature type="sequence variant" id="VAR_005965" description="In LFS; germline mutation and in sporadic cancers; somatic mutation; dbSNP:rs587782664." evidence="153">
    <original>M</original>
    <variation>I</variation>
    <location>
        <position position="237"/>
    </location>
</feature>
<feature type="sequence variant" id="VAR_045195" description="In sporadic cancers; somatic mutation; dbSNP:rs765848205.">
    <original>M</original>
    <variation>K</variation>
    <location>
        <position position="237"/>
    </location>
</feature>
<feature type="sequence variant" id="VAR_045196" description="In sporadic cancers; somatic mutation.">
    <original>M</original>
    <variation>L</variation>
    <location>
        <position position="237"/>
    </location>
</feature>
<feature type="sequence variant" id="VAR_045197" description="In sporadic cancers; somatic mutation; dbSNP:rs765848205.">
    <original>M</original>
    <variation>R</variation>
    <location>
        <position position="237"/>
    </location>
</feature>
<feature type="sequence variant" id="VAR_045198" description="In sporadic cancers; somatic mutation.">
    <original>M</original>
    <variation>T</variation>
    <location>
        <position position="237"/>
    </location>
</feature>
<feature type="sequence variant" id="VAR_045199" description="In sporadic cancers; somatic mutation; dbSNP:rs730882004.">
    <original>M</original>
    <variation>V</variation>
    <location>
        <position position="237"/>
    </location>
</feature>
<feature type="sequence variant" id="VAR_005966" description="In sporadic cancers; somatic mutation; dbSNP:rs730882005.">
    <original>C</original>
    <variation>F</variation>
    <location>
        <position position="238"/>
    </location>
</feature>
<feature type="sequence variant" id="VAR_045200" description="In LFS; germline mutation and in sporadic cancers; somatic mutation; dbSNP:rs1057519981.">
    <original>C</original>
    <variation>G</variation>
    <location>
        <position position="238"/>
    </location>
</feature>
<feature type="sequence variant" id="VAR_045850" description="In a sporadic cancer; somatic mutation; requires 2 nucleotide substitutions.">
    <original>C</original>
    <variation>H</variation>
    <location>
        <position position="238"/>
    </location>
</feature>
<feature type="sequence variant" id="VAR_045201" description="In sporadic cancers; somatic mutation; dbSNP:rs1057519981.">
    <original>C</original>
    <variation>R</variation>
    <location>
        <position position="238"/>
    </location>
</feature>
<feature type="sequence variant" id="VAR_045202" description="In LFS; germline mutation and in sporadic cancers; somatic mutation; dbSNP:rs730882005.">
    <original>C</original>
    <variation>S</variation>
    <location>
        <position position="238"/>
    </location>
</feature>
<feature type="sequence variant" id="VAR_045203" description="In sporadic cancers; somatic mutation; dbSNP:rs193920789.">
    <original>C</original>
    <variation>W</variation>
    <location>
        <position position="238"/>
    </location>
</feature>
<feature type="sequence variant" id="VAR_005967" description="In a familial cancer not matching LFS; germline mutation and in sporadic cancers; somatic mutation; dbSNP:rs730882005.">
    <original>C</original>
    <variation>Y</variation>
    <location>
        <position position="238"/>
    </location>
</feature>
<feature type="sequence variant" id="VAR_045204" description="In sporadic cancers; somatic mutation; dbSNP:rs876660807.">
    <original>N</original>
    <variation>D</variation>
    <location>
        <position position="239"/>
    </location>
</feature>
<feature type="sequence variant" id="VAR_045205" description="In a sporadic cancer; somatic mutation.">
    <original>N</original>
    <variation>H</variation>
    <location>
        <position position="239"/>
    </location>
</feature>
<feature type="sequence variant" id="VAR_045206" description="In a sporadic cancer; somatic mutation.">
    <original>N</original>
    <variation>I</variation>
    <location>
        <position position="239"/>
    </location>
</feature>
<feature type="sequence variant" id="VAR_045207" description="In sporadic cancers; somatic mutation; dbSNP:rs1057522275.">
    <original>N</original>
    <variation>K</variation>
    <location>
        <position position="239"/>
    </location>
</feature>
<feature type="sequence variant" id="VAR_045208" description="In sporadic cancers; somatic mutation; dbSNP:rs1057519999.">
    <original>N</original>
    <variation>S</variation>
    <location>
        <position position="239"/>
    </location>
</feature>
<feature type="sequence variant" id="VAR_045209" description="In sporadic cancers; somatic mutation; dbSNP:rs1057519999.">
    <original>N</original>
    <variation>T</variation>
    <location>
        <position position="239"/>
    </location>
</feature>
<feature type="sequence variant" id="VAR_045210" description="In sporadic cancers; somatic mutation.">
    <original>N</original>
    <variation>Y</variation>
    <location>
        <position position="239"/>
    </location>
</feature>
<feature type="sequence variant" id="VAR_045211" description="In sporadic cancers; somatic mutation.">
    <original>S</original>
    <variation>C</variation>
    <location>
        <position position="240"/>
    </location>
</feature>
<feature type="sequence variant" id="VAR_045212" description="In sporadic cancers; somatic mutation.">
    <original>S</original>
    <variation>G</variation>
    <location>
        <position position="240"/>
    </location>
</feature>
<feature type="sequence variant" id="VAR_005968" description="In sporadic cancers; somatic mutation.">
    <original>S</original>
    <variation>I</variation>
    <location>
        <position position="240"/>
    </location>
</feature>
<feature type="sequence variant" id="VAR_045213" description="In sporadic cancers; somatic mutation.">
    <original>S</original>
    <variation>N</variation>
    <location>
        <position position="240"/>
    </location>
</feature>
<feature type="sequence variant" id="VAR_045214" description="In a sporadic cancer; somatic mutation.">
    <original>S</original>
    <variation>P</variation>
    <location>
        <position position="240"/>
    </location>
</feature>
<feature type="sequence variant" id="VAR_045215" description="In sporadic cancers; somatic mutation.">
    <original>S</original>
    <variation>R</variation>
    <location>
        <position position="240"/>
    </location>
</feature>
<feature type="sequence variant" id="VAR_045216" description="In sporadic cancers; somatic mutation.">
    <original>S</original>
    <variation>T</variation>
    <location>
        <position position="240"/>
    </location>
</feature>
<feature type="sequence variant" id="VAR_033036" description="In sporadic cancers; somatic mutation; dbSNP:rs1057520002." evidence="75">
    <original>S</original>
    <variation>A</variation>
    <location>
        <position position="241"/>
    </location>
</feature>
<feature type="sequence variant" id="VAR_045217" description="In sporadic cancers; somatic mutation; dbSNP:rs28934573.">
    <original>S</original>
    <variation>C</variation>
    <location>
        <position position="241"/>
    </location>
</feature>
<feature type="sequence variant" id="VAR_005969" description="In LFS; germline mutation and in sporadic cancers; somatic mutation; dbSNP:rs28934573." evidence="65 66">
    <original>S</original>
    <variation>F</variation>
    <location>
        <position position="241"/>
    </location>
</feature>
<feature type="sequence variant" id="VAR_045218" description="In sporadic cancers; somatic mutation; dbSNP:rs1057520002.">
    <original>S</original>
    <variation>P</variation>
    <location>
        <position position="241"/>
    </location>
</feature>
<feature type="sequence variant" id="VAR_047183" description="In LFS; germline mutation and in sporadic cancers; somatic mutation.">
    <original>S</original>
    <variation>T</variation>
    <location>
        <position position="241"/>
    </location>
</feature>
<feature type="sequence variant" id="VAR_045219" description="In sporadic cancers; somatic mutation; dbSNP:rs28934573.">
    <original>S</original>
    <variation>Y</variation>
    <location>
        <position position="241"/>
    </location>
</feature>
<feature type="sequence variant" id="VAR_005970" description="In sporadic cancers; somatic mutation; dbSNP:rs121912655." evidence="32 65">
    <original>C</original>
    <variation>F</variation>
    <location>
        <position position="242"/>
    </location>
</feature>
<feature type="sequence variant" id="VAR_045220" description="In sporadic cancers; somatic mutation; dbSNP:rs1057519982.">
    <original>C</original>
    <variation>G</variation>
    <location>
        <position position="242"/>
    </location>
</feature>
<feature type="sequence variant" id="VAR_045221" description="In sporadic cancers; somatic mutation.">
    <original>C</original>
    <variation>R</variation>
    <location>
        <position position="242"/>
    </location>
</feature>
<feature type="sequence variant" id="VAR_045222" description="In sporadic cancers; somatic mutation; dbSNP:rs121912655.">
    <original>C</original>
    <variation>S</variation>
    <location>
        <position position="242"/>
    </location>
</feature>
<feature type="sequence variant" id="VAR_045223" description="In sporadic cancers; somatic mutation; dbSNP:rs375874539.">
    <original>C</original>
    <variation>W</variation>
    <location>
        <position position="242"/>
    </location>
</feature>
<feature type="sequence variant" id="VAR_045224" description="In a familial cancer not matching LFS; germline mutation and in sporadic cancers; somatic mutation; dbSNP:rs121912655.">
    <original>C</original>
    <variation>Y</variation>
    <location>
        <position position="242"/>
    </location>
</feature>
<feature type="sequence variant" id="VAR_047184" description="In a sporadic cancer; somatic mutation.">
    <original>MG</original>
    <variation>IC</variation>
    <location>
        <begin position="243"/>
        <end position="244"/>
    </location>
</feature>
<feature type="sequence variant" id="VAR_047185" description="In a sporadic cancer; somatic mutation.">
    <original>MG</original>
    <variation>IS</variation>
    <location>
        <begin position="243"/>
        <end position="244"/>
    </location>
</feature>
<feature type="sequence variant" id="VAR_045225" description="In sporadic cancers; somatic mutation.">
    <original>M</original>
    <variation>I</variation>
    <location>
        <position position="243"/>
    </location>
</feature>
<feature type="sequence variant" id="VAR_045226" description="In sporadic cancers; somatic mutation.">
    <original>M</original>
    <variation>K</variation>
    <location>
        <position position="243"/>
    </location>
</feature>
<feature type="sequence variant" id="VAR_045227" description="In sporadic cancers; somatic mutation; dbSNP:rs786203117.">
    <original>M</original>
    <variation>L</variation>
    <location>
        <position position="243"/>
    </location>
</feature>
<feature type="sequence variant" id="VAR_045228" description="In sporadic cancers; somatic mutation.">
    <original>M</original>
    <variation>R</variation>
    <location>
        <position position="243"/>
    </location>
</feature>
<feature type="sequence variant" id="VAR_045229" description="In sporadic cancers; somatic mutation; dbSNP:rs730882006.">
    <original>M</original>
    <variation>T</variation>
    <location>
        <position position="243"/>
    </location>
</feature>
<feature type="sequence variant" id="VAR_045230" description="In sporadic cancers; somatic mutation; dbSNP:rs786203117.">
    <original>M</original>
    <variation>V</variation>
    <location>
        <position position="243"/>
    </location>
</feature>
<feature type="sequence variant" id="VAR_047186" description="In sporadic cancers; somatic mutation; dbSNP:rs985033810.">
    <original>G</original>
    <variation>A</variation>
    <location>
        <position position="244"/>
    </location>
</feature>
<feature type="sequence variant" id="VAR_045231" description="In sporadic cancers; somatic mutation; dbSNP:rs1057519989.">
    <original>G</original>
    <variation>C</variation>
    <location>
        <position position="244"/>
    </location>
</feature>
<feature type="sequence variant" id="VAR_045232" description="In LFS; germline mutation and in sporadic cancers; somatic mutation; dbSNP:rs1057517983.">
    <original>G</original>
    <variation>D</variation>
    <location>
        <position position="244"/>
    </location>
</feature>
<feature type="sequence variant" id="VAR_045233" description="In a sporadic cancer; somatic mutation.">
    <original>G</original>
    <variation>E</variation>
    <location>
        <position position="244"/>
    </location>
</feature>
<feature type="sequence variant" id="VAR_045234" description="In sporadic cancers; somatic mutation; dbSNP:rs1057519989.">
    <original>G</original>
    <variation>R</variation>
    <location>
        <position position="244"/>
    </location>
</feature>
<feature type="sequence variant" id="VAR_045235" description="In sporadic cancers; somatic mutation; dbSNP:rs1057519989.">
    <original>G</original>
    <variation>S</variation>
    <location>
        <position position="244"/>
    </location>
</feature>
<feature type="sequence variant" id="VAR_045236" description="In LFS; germline mutation and in sporadic cancers; somatic mutation; dbSNP:rs985033810.">
    <original>G</original>
    <variation>V</variation>
    <location>
        <position position="244"/>
    </location>
</feature>
<feature type="sequence variant" id="VAR_005971" description="In sporadic cancers; somatic mutation; dbSNP:rs121912656.">
    <original>G</original>
    <variation>A</variation>
    <location>
        <position position="245"/>
    </location>
</feature>
<feature type="sequence variant" id="VAR_005972" description="In LFS; germline mutation and in sporadic cancers; somatic mutation; dbSNP:rs28934575." evidence="32 107">
    <original>G</original>
    <variation>C</variation>
    <location>
        <position position="245"/>
    </location>
</feature>
<feature type="sequence variant" id="VAR_005973" description="In LFS; germline mutation and in sporadic cancers; somatic mutation; dbSNP:rs121912656." evidence="135">
    <original>G</original>
    <variation>D</variation>
    <location>
        <position position="245"/>
    </location>
</feature>
<feature type="sequence variant" id="VAR_045237" description="In a sporadic cancer; somatic mutation.">
    <original>G</original>
    <variation>E</variation>
    <location>
        <position position="245"/>
    </location>
</feature>
<feature type="sequence variant" id="VAR_045851" description="In sporadic cancers; somatic mutation; requires 2 nucleotide substitutions.">
    <original>G</original>
    <variation>F</variation>
    <location>
        <position position="245"/>
    </location>
</feature>
<feature type="sequence variant" id="VAR_045852" description="In a sporadic cancer; somatic mutation; requires 2 nucleotide substitutions.">
    <original>G</original>
    <variation>H</variation>
    <location>
        <position position="245"/>
    </location>
</feature>
<feature type="sequence variant" id="VAR_045853" description="In sporadic cancers; somatic mutation; requires 2 nucleotide substitutions.">
    <original>G</original>
    <variation>L</variation>
    <location>
        <position position="245"/>
    </location>
</feature>
<feature type="sequence variant" id="VAR_045854" description="In sporadic cancers; somatic mutation; requires 2 nucleotide substitutions.">
    <original>G</original>
    <variation>N</variation>
    <location>
        <position position="245"/>
    </location>
</feature>
<feature type="sequence variant" id="VAR_045238" description="In sporadic cancers; somatic mutation; dbSNP:rs28934575.">
    <original>G</original>
    <variation>R</variation>
    <location>
        <position position="245"/>
    </location>
</feature>
<feature type="sequence variant" id="VAR_005974" description="In LFS; germline mutation and in sporadic cancers; somatic mutation; dbSNP:rs28934575." evidence="177">
    <original>G</original>
    <variation>S</variation>
    <location>
        <position position="245"/>
    </location>
</feature>
<feature type="sequence variant" id="VAR_005975" description="In LFS; germline mutation and in sporadic cancers; somatic mutation; dbSNP:rs121912656." evidence="136">
    <original>G</original>
    <variation>V</variation>
    <location>
        <position position="245"/>
    </location>
</feature>
<feature type="sequence variant" id="VAR_045239" description="In sporadic cancers; somatic mutation; dbSNP:rs1019340046.">
    <original>M</original>
    <variation>I</variation>
    <location>
        <position position="246"/>
    </location>
</feature>
<feature type="sequence variant" id="VAR_045240" description="In sporadic cancers; somatic mutation.">
    <original>M</original>
    <variation>K</variation>
    <location>
        <position position="246"/>
    </location>
</feature>
<feature type="sequence variant" id="VAR_044020" description="In sporadic cancers; somatic mutation; dbSNP:rs483352695.">
    <original>M</original>
    <variation>L</variation>
    <location>
        <position position="246"/>
    </location>
</feature>
<feature type="sequence variant" id="VAR_005976" description="In sporadic cancers; somatic mutation; dbSNP:rs587780074.">
    <original>M</original>
    <variation>R</variation>
    <location>
        <position position="246"/>
    </location>
</feature>
<feature type="sequence variant" id="VAR_005977" description="In sporadic cancers; somatic mutation; dbSNP:rs587780074.">
    <original>M</original>
    <variation>T</variation>
    <location>
        <position position="246"/>
    </location>
</feature>
<feature type="sequence variant" id="VAR_005978" description="In LFS; germline mutation and in sporadic cancers; somatic mutation; dbSNP:rs483352695.">
    <original>M</original>
    <variation>V</variation>
    <location>
        <position position="246"/>
    </location>
</feature>
<feature type="sequence variant" id="VAR_047187" description="In a sporadic cancer; somatic mutation.">
    <original>NR</original>
    <variation>IP</variation>
    <location>
        <begin position="247"/>
        <end position="248"/>
    </location>
</feature>
<feature type="sequence variant" id="VAR_047188" description="In sporadic cancers; somatic mutation.">
    <original>NR</original>
    <variation>KW</variation>
    <location>
        <begin position="247"/>
        <end position="248"/>
    </location>
</feature>
<feature type="sequence variant" id="VAR_045241" description="In sporadic cancers; somatic mutation; dbSNP:rs1452189221.">
    <original>N</original>
    <variation>D</variation>
    <location>
        <position position="247"/>
    </location>
</feature>
<feature type="sequence variant" id="VAR_045855" description="In a sporadic cancer; somatic mutation; requires 2 nucleotide substitutions.">
    <original>N</original>
    <variation>F</variation>
    <location>
        <position position="247"/>
    </location>
</feature>
<feature type="sequence variant" id="VAR_005980" description="In sporadic cancers; somatic mutation; dbSNP:rs786201762.">
    <original>N</original>
    <variation>I</variation>
    <location>
        <position position="247"/>
    </location>
</feature>
<feature type="sequence variant" id="VAR_045242" description="In sporadic cancers; somatic mutation.">
    <original>N</original>
    <variation>K</variation>
    <location>
        <position position="247"/>
    </location>
</feature>
<feature type="sequence variant" id="VAR_045243" description="In sporadic cancers; somatic mutation; dbSNP:rs786201762.">
    <original>N</original>
    <variation>S</variation>
    <location>
        <position position="247"/>
    </location>
</feature>
<feature type="sequence variant" id="VAR_047189" description="In sporadic cancers; somatic mutation.">
    <original>N</original>
    <variation>T</variation>
    <location>
        <position position="247"/>
    </location>
</feature>
<feature type="sequence variant" id="VAR_045244" description="In sporadic cancers; somatic mutation.">
    <original>N</original>
    <variation>Y</variation>
    <location>
        <position position="247"/>
    </location>
</feature>
<feature type="sequence variant" id="VAR_045245" description="In a sporadic cancer; somatic mutation.">
    <original>R</original>
    <variation>C</variation>
    <location>
        <position position="248"/>
    </location>
</feature>
<feature type="sequence variant" id="VAR_005981" description="In sporadic cancers; somatic mutation; dbSNP:rs121912651.">
    <original>R</original>
    <variation>G</variation>
    <location>
        <position position="248"/>
    </location>
</feature>
<feature type="sequence variant" id="VAR_005982" description="In sporadic cancers; somatic mutation; dbSNP:rs11540652." evidence="32 171">
    <original>R</original>
    <variation>L</variation>
    <location>
        <position position="248"/>
    </location>
</feature>
<feature type="sequence variant" id="VAR_045246" description="In sporadic cancers; somatic mutation; dbSNP:rs11540652.">
    <original>R</original>
    <variation>P</variation>
    <location>
        <position position="248"/>
    </location>
</feature>
<feature type="sequence variant" id="VAR_005983" description="In LFS; germline mutation and in sporadic cancers; somatic mutation; dbSNP:rs11540652." evidence="65 136 171 172">
    <original>R</original>
    <variation>Q</variation>
    <location>
        <position position="248"/>
    </location>
</feature>
<feature type="sequence variant" id="VAR_005984" description="In LFS; germline mutation and in sporadic cancers; somatic mutation; dbSNP:rs121912651." evidence="65 107 153 177">
    <original>R</original>
    <variation>W</variation>
    <location>
        <position position="248"/>
    </location>
</feature>
<feature type="sequence variant" id="VAR_047190" description="In a sporadic cancer; somatic mutation.">
    <original>RP</original>
    <variation>SA</variation>
    <location>
        <begin position="249"/>
        <end position="250"/>
    </location>
</feature>
<feature type="sequence variant" id="VAR_047191" description="In sporadic cancers; somatic mutation.">
    <original>RP</original>
    <variation>SS</variation>
    <location>
        <begin position="249"/>
        <end position="250"/>
    </location>
</feature>
<feature type="sequence variant" id="VAR_005985" description="In sporadic cancers; somatic mutation; dbSNP:rs587782082.">
    <original>R</original>
    <variation>G</variation>
    <location>
        <position position="249"/>
    </location>
</feature>
<feature type="sequence variant" id="VAR_045247" description="In a sporadic cancer; somatic mutation.">
    <original>R</original>
    <variation>I</variation>
    <location>
        <position position="249"/>
    </location>
</feature>
<feature type="sequence variant" id="VAR_045248" description="In sporadic cancers; somatic mutation; dbSNP:rs587782329.">
    <original>R</original>
    <variation>K</variation>
    <location>
        <position position="249"/>
    </location>
</feature>
<feature type="sequence variant" id="VAR_033037" description="In sporadic cancers; somatic mutation; dbSNP:rs587782329." evidence="75">
    <original>R</original>
    <variation>M</variation>
    <location>
        <position position="249"/>
    </location>
</feature>
<feature type="sequence variant" id="VAR_045856" description="In a sporadic cancer; somatic mutation; requires 2 nucleotide substitutions.">
    <original>R</original>
    <variation>N</variation>
    <location>
        <position position="249"/>
    </location>
</feature>
<feature type="sequence variant" id="VAR_005986" description="In sporadic cancers; somatic mutation; does not induce SNAI1 degradation; dbSNP:rs28934571." evidence="64 65 121">
    <original>R</original>
    <variation>S</variation>
    <location>
        <position position="249"/>
    </location>
</feature>
<feature type="sequence variant" id="VAR_045249" description="In sporadic cancers; somatic mutation; dbSNP:rs587782329.">
    <original>R</original>
    <variation>T</variation>
    <location>
        <position position="249"/>
    </location>
</feature>
<feature type="sequence variant" id="VAR_045250" description="In sporadic cancers; somatic mutation; dbSNP:rs587782082.">
    <original>R</original>
    <variation>W</variation>
    <location>
        <position position="249"/>
    </location>
</feature>
<feature type="sequence variant" id="VAR_045251" description="In sporadic cancers; somatic mutation.">
    <original>P</original>
    <variation>A</variation>
    <location>
        <position position="250"/>
    </location>
</feature>
<feature type="sequence variant" id="VAR_045857" description="In sporadic cancers; somatic mutation; requires 2 nucleotide substitutions.">
    <original>P</original>
    <variation>F</variation>
    <location>
        <position position="250"/>
    </location>
</feature>
<feature type="sequence variant" id="VAR_045252" description="In sporadic cancers; somatic mutation.">
    <original>P</original>
    <variation>H</variation>
    <location>
        <position position="250"/>
    </location>
</feature>
<feature type="sequence variant" id="VAR_047192" description="In sporadic cancers; somatic mutation; dbSNP:rs1064794311.">
    <original>P</original>
    <variation>L</variation>
    <location>
        <position position="250"/>
    </location>
</feature>
<feature type="sequence variant" id="VAR_045858" description="In sporadic cancers; somatic mutation; requires 2 nucleotide substitutions.">
    <original>P</original>
    <variation>N</variation>
    <location>
        <position position="250"/>
    </location>
</feature>
<feature type="sequence variant" id="VAR_045253" description="In sporadic cancers; somatic mutation.">
    <original>P</original>
    <variation>Q</variation>
    <location>
        <position position="250"/>
    </location>
</feature>
<feature type="sequence variant" id="VAR_045254" description="In sporadic cancers; somatic mutation.">
    <original>P</original>
    <variation>S</variation>
    <location>
        <position position="250"/>
    </location>
</feature>
<feature type="sequence variant" id="VAR_045255" description="In sporadic cancers; somatic mutation.">
    <original>P</original>
    <variation>T</variation>
    <location>
        <position position="250"/>
    </location>
</feature>
<feature type="sequence variant" id="VAR_045256" description="In sporadic cancers; somatic mutation.">
    <original>I</original>
    <variation>F</variation>
    <location>
        <position position="251"/>
    </location>
</feature>
<feature type="sequence variant" id="VAR_045257" description="In sporadic cancers; somatic mutation; dbSNP:rs730882007.">
    <original>I</original>
    <variation>L</variation>
    <location>
        <position position="251"/>
    </location>
</feature>
<feature type="sequence variant" id="VAR_045258" description="In LFS; germline mutation; dbSNP:rs878854074.">
    <original>I</original>
    <variation>M</variation>
    <location>
        <position position="251"/>
    </location>
</feature>
<feature type="sequence variant" id="VAR_005987" description="In sporadic cancers; somatic mutation.">
    <original>I</original>
    <variation>N</variation>
    <location>
        <position position="251"/>
    </location>
</feature>
<feature type="sequence variant" id="VAR_033038" description="In sporadic cancers; somatic mutation; dbSNP:rs730882027." evidence="75">
    <original>I</original>
    <variation>S</variation>
    <location>
        <position position="251"/>
    </location>
</feature>
<feature type="sequence variant" id="VAR_045259" description="In sporadic cancers; somatic mutation.">
    <original>I</original>
    <variation>T</variation>
    <location>
        <position position="251"/>
    </location>
</feature>
<feature type="sequence variant" id="VAR_045260" description="In sporadic cancers; somatic mutation.">
    <original>I</original>
    <variation>V</variation>
    <location>
        <position position="251"/>
    </location>
</feature>
<feature type="sequence variant" id="VAR_045261" description="In sporadic cancers; somatic mutation.">
    <original>L</original>
    <variation>F</variation>
    <location>
        <position position="252"/>
    </location>
</feature>
<feature type="sequence variant" id="VAR_045262" description="In a sporadic cancer; somatic mutation.">
    <original>L</original>
    <variation>H</variation>
    <location>
        <position position="252"/>
    </location>
</feature>
<feature type="sequence variant" id="VAR_045263" description="In sporadic cancers; somatic mutation.">
    <original>L</original>
    <variation>I</variation>
    <location>
        <position position="252"/>
    </location>
</feature>
<feature type="sequence variant" id="VAR_005988" description="In LFS; germline mutation and in sporadic cancers; somatic mutation; dbSNP:rs121912653." evidence="107">
    <original>L</original>
    <variation>P</variation>
    <location>
        <position position="252"/>
    </location>
</feature>
<feature type="sequence variant" id="VAR_045264" description="In a sporadic cancer; somatic mutation.">
    <original>L</original>
    <variation>V</variation>
    <location>
        <position position="252"/>
    </location>
</feature>
<feature type="sequence variant" id="VAR_045265" description="In sporadic cancers; somatic mutation.">
    <original>T</original>
    <variation>A</variation>
    <location>
        <position position="253"/>
    </location>
</feature>
<feature type="sequence variant" id="VAR_045266" description="In sporadic cancers; somatic mutation.">
    <original>T</original>
    <variation>I</variation>
    <location>
        <position position="253"/>
    </location>
</feature>
<feature type="sequence variant" id="VAR_045267" description="In sporadic cancers; somatic mutation; dbSNP:rs1555525465.">
    <original>T</original>
    <variation>N</variation>
    <location>
        <position position="253"/>
    </location>
</feature>
<feature type="sequence variant" id="VAR_047193" description="In sporadic cancers; somatic mutation.">
    <original>T</original>
    <variation>P</variation>
    <location>
        <position position="253"/>
    </location>
</feature>
<feature type="sequence variant" id="VAR_045268" description="In sporadic cancers; somatic mutation.">
    <original>T</original>
    <variation>S</variation>
    <location>
        <position position="253"/>
    </location>
</feature>
<feature type="sequence variant" id="VAR_045859" description="In sporadic cancers; somatic mutation; requires 2 nucleotide substitutions.">
    <original>I</original>
    <variation>D</variation>
    <location>
        <position position="254"/>
    </location>
</feature>
<feature type="sequence variant" id="VAR_045269" description="In a sporadic cancer; somatic mutation.">
    <original>I</original>
    <variation>F</variation>
    <location>
        <position position="254"/>
    </location>
</feature>
<feature type="sequence variant" id="VAR_045270" description="In a sporadic cancer; somatic mutation.">
    <original>I</original>
    <variation>L</variation>
    <location>
        <position position="254"/>
    </location>
</feature>
<feature type="sequence variant" id="VAR_045271" description="In a sporadic cancer; somatic mutation.">
    <original>I</original>
    <variation>M</variation>
    <location>
        <position position="254"/>
    </location>
</feature>
<feature type="sequence variant" id="VAR_017908" description="In sporadic cancers; somatic mutation.">
    <original>I</original>
    <variation>N</variation>
    <location>
        <position position="254"/>
    </location>
</feature>
<feature type="sequence variant" id="VAR_045272" description="In sporadic cancers; somatic mutation; dbSNP:rs1330865474.">
    <original>I</original>
    <variation>S</variation>
    <location>
        <position position="254"/>
    </location>
</feature>
<feature type="sequence variant" id="VAR_017909" description="In sporadic cancers; somatic mutation.">
    <original>I</original>
    <variation>T</variation>
    <location>
        <position position="254"/>
    </location>
</feature>
<feature type="sequence variant" id="VAR_045273" description="In sporadic cancers; somatic mutation; dbSNP:rs746601313.">
    <original>I</original>
    <variation>V</variation>
    <location>
        <position position="254"/>
    </location>
</feature>
<feature type="sequence variant" id="VAR_045274" description="In sporadic cancers; somatic mutation; dbSNP:rs1057519995.">
    <original>I</original>
    <variation>F</variation>
    <location>
        <position position="255"/>
    </location>
</feature>
<feature type="sequence variant" id="VAR_045275" description="In sporadic cancers; somatic mutation.">
    <original>I</original>
    <variation>M</variation>
    <location>
        <position position="255"/>
    </location>
</feature>
<feature type="sequence variant" id="VAR_045276" description="In sporadic cancers; somatic mutation; dbSNP:rs876659675.">
    <original>I</original>
    <variation>N</variation>
    <location>
        <position position="255"/>
    </location>
</feature>
<feature type="sequence variant" id="VAR_045277" description="In sporadic cancers; somatic mutation; dbSNP:rs876659675.">
    <original>I</original>
    <variation>S</variation>
    <location>
        <position position="255"/>
    </location>
</feature>
<feature type="sequence variant" id="VAR_045278" description="In sporadic cancers; somatic mutation; dbSNP:rs876659675.">
    <original>I</original>
    <variation>T</variation>
    <location>
        <position position="255"/>
    </location>
</feature>
<feature type="sequence variant" id="VAR_045279" description="In sporadic cancers; somatic mutation.">
    <original>I</original>
    <variation>V</variation>
    <location>
        <position position="255"/>
    </location>
</feature>
<feature type="sequence variant" id="VAR_045280" description="In a brain tumor with no family history; germline mutation and in sporadic cancers; somatic mutation.">
    <original>T</original>
    <variation>I</variation>
    <location>
        <position position="256"/>
    </location>
</feature>
<feature type="sequence variant" id="VAR_045281" description="In sporadic cancers; somatic mutation.">
    <original>T</original>
    <variation>K</variation>
    <location>
        <position position="256"/>
    </location>
</feature>
<feature type="sequence variant" id="VAR_045282" description="In sporadic cancers; somatic mutation.">
    <original>T</original>
    <variation>P</variation>
    <location>
        <position position="256"/>
    </location>
</feature>
<feature type="sequence variant" id="VAR_045283" description="In sporadic cancers; somatic mutation.">
    <original>T</original>
    <variation>S</variation>
    <location>
        <position position="256"/>
    </location>
</feature>
<feature type="sequence variant" id="VAR_005989" description="In sporadic cancers; somatic mutation.">
    <original>L</original>
    <variation>P</variation>
    <location>
        <position position="257"/>
    </location>
</feature>
<feature type="sequence variant" id="VAR_045284" description="In LFS; germline mutation and in sporadic cancers; somatic mutation; dbSNP:rs28934577.">
    <original>L</original>
    <variation>Q</variation>
    <location>
        <position position="257"/>
    </location>
</feature>
<feature type="sequence variant" id="VAR_045285" description="In sporadic cancers; somatic mutation; dbSNP:rs28934577.">
    <original>L</original>
    <variation>R</variation>
    <location>
        <position position="257"/>
    </location>
</feature>
<feature type="sequence variant" id="VAR_045286" description="In sporadic cancers; somatic mutation.">
    <original>L</original>
    <variation>V</variation>
    <location>
        <position position="257"/>
    </location>
</feature>
<feature type="sequence variant" id="VAR_045287" description="In sporadic cancers; somatic mutation.">
    <original>E</original>
    <variation>A</variation>
    <location>
        <position position="258"/>
    </location>
</feature>
<feature type="sequence variant" id="VAR_005990" description="In sporadic cancers; somatic mutation.">
    <original>E</original>
    <variation>D</variation>
    <location>
        <position position="258"/>
    </location>
</feature>
<feature type="sequence variant" id="VAR_045288" description="In sporadic cancers; somatic mutation; dbSNP:rs1060501201.">
    <original>E</original>
    <variation>G</variation>
    <location>
        <position position="258"/>
    </location>
</feature>
<feature type="sequence variant" id="VAR_005991" description="In LFS; germline mutation and in sporadic cancers; somatic mutation; dbSNP:rs121912652." evidence="107">
    <original>E</original>
    <variation>K</variation>
    <location>
        <position position="258"/>
    </location>
</feature>
<feature type="sequence variant" id="VAR_045860" description="In a sporadic cancer; somatic mutation; requires 2 nucleotide substitutions.">
    <original>E</original>
    <variation>L</variation>
    <location>
        <position position="258"/>
    </location>
</feature>
<feature type="sequence variant" id="VAR_045289" description="In sporadic cancers; somatic mutation.">
    <original>E</original>
    <variation>Q</variation>
    <location>
        <position position="258"/>
    </location>
</feature>
<feature type="sequence variant" id="VAR_045290" description="In sporadic cancers; somatic mutation.">
    <original>E</original>
    <variation>V</variation>
    <location>
        <position position="258"/>
    </location>
</feature>
<feature type="sequence variant" id="VAR_047194" description="In a sporadic cancer; somatic mutation.">
    <original>D</original>
    <variation>A</variation>
    <location>
        <position position="259"/>
    </location>
</feature>
<feature type="sequence variant" id="VAR_045291" description="In sporadic cancers; somatic mutation.">
    <original>D</original>
    <variation>E</variation>
    <location>
        <position position="259"/>
    </location>
</feature>
<feature type="sequence variant" id="VAR_045292" description="In sporadic cancers; somatic mutation; dbSNP:rs745425759.">
    <original>D</original>
    <variation>G</variation>
    <location>
        <position position="259"/>
    </location>
</feature>
<feature type="sequence variant" id="VAR_045293" description="In sporadic cancers; somatic mutation.">
    <original>D</original>
    <variation>H</variation>
    <location>
        <position position="259"/>
    </location>
</feature>
<feature type="sequence variant" id="VAR_045294" description="In sporadic cancers; somatic mutation.">
    <original>D</original>
    <variation>N</variation>
    <location>
        <position position="259"/>
    </location>
</feature>
<feature type="sequence variant" id="VAR_045861" description="In a sporadic cancer; somatic mutation; requires 2 nucleotide substitutions.">
    <original>D</original>
    <variation>P</variation>
    <location>
        <position position="259"/>
    </location>
</feature>
<feature type="sequence variant" id="VAR_045862" description="In a sporadic cancer; somatic mutation; requires 2 nucleotide substitutions.">
    <original>D</original>
    <variation>S</variation>
    <location>
        <position position="259"/>
    </location>
</feature>
<feature type="sequence variant" id="VAR_045295" description="In sporadic cancers; somatic mutation.">
    <original>D</original>
    <variation>V</variation>
    <location>
        <position position="259"/>
    </location>
</feature>
<feature type="sequence variant" id="VAR_033039" description="In sporadic cancers; somatic mutation." evidence="75">
    <original>D</original>
    <variation>Y</variation>
    <location>
        <position position="259"/>
    </location>
</feature>
<feature type="sequence variant" id="VAR_045296" description="In sporadic cancers; somatic mutation.">
    <original>S</original>
    <variation>A</variation>
    <location>
        <position position="260"/>
    </location>
</feature>
<feature type="sequence variant" id="VAR_045297" description="In sporadic cancers; somatic mutation.">
    <original>S</original>
    <variation>C</variation>
    <location>
        <position position="260"/>
    </location>
</feature>
<feature type="sequence variant" id="VAR_045298" description="In sporadic cancers; somatic mutation.">
    <original>S</original>
    <variation>F</variation>
    <location>
        <position position="260"/>
    </location>
</feature>
<feature type="sequence variant" id="VAR_045299" description="In sporadic cancers; somatic mutation.">
    <original>S</original>
    <variation>P</variation>
    <location>
        <position position="260"/>
    </location>
</feature>
<feature type="sequence variant" id="VAR_045300" description="In a sporadic cancer; somatic mutation.">
    <original>S</original>
    <variation>T</variation>
    <location>
        <position position="260"/>
    </location>
</feature>
<feature type="sequence variant" id="VAR_045301" description="In sporadic cancers; somatic mutation; dbSNP:rs876658916.">
    <original>S</original>
    <variation>Y</variation>
    <location>
        <position position="260"/>
    </location>
</feature>
<feature type="sequence variant" id="VAR_045302" description="In a sporadic cancer; somatic mutation.">
    <original>S</original>
    <variation>C</variation>
    <location>
        <position position="261"/>
    </location>
</feature>
<feature type="sequence variant" id="VAR_045303" description="In sporadic cancers; somatic mutation.">
    <original>S</original>
    <variation>G</variation>
    <location>
        <position position="261"/>
    </location>
</feature>
<feature type="sequence variant" id="VAR_045304" description="In sporadic cancers; somatic mutation.">
    <original>S</original>
    <variation>I</variation>
    <location>
        <position position="261"/>
    </location>
</feature>
<feature type="sequence variant" id="VAR_045305" description="In a sporadic cancer; somatic mutation.">
    <original>S</original>
    <variation>N</variation>
    <location>
        <position position="261"/>
    </location>
</feature>
<feature type="sequence variant" id="VAR_045306" description="In sporadic cancers; somatic mutation.">
    <original>S</original>
    <variation>R</variation>
    <location>
        <position position="261"/>
    </location>
</feature>
<feature type="sequence variant" id="VAR_047195" description="In a sporadic cancer; somatic mutation.">
    <original>GN</original>
    <variation>PD</variation>
    <location>
        <begin position="262"/>
        <end position="263"/>
    </location>
</feature>
<feature type="sequence variant" id="VAR_045307" description="In a sporadic cancer; somatic mutation; dbSNP:rs200579969.">
    <original>G</original>
    <variation>C</variation>
    <location>
        <position position="262"/>
    </location>
</feature>
<feature type="sequence variant" id="VAR_047196" description="In sporadic cancers; somatic mutation.">
    <original>G</original>
    <variation>D</variation>
    <location>
        <position position="262"/>
    </location>
</feature>
<feature type="sequence variant" id="VAR_045863" description="In a sporadic cancer; somatic mutation; requires 2 nucleotide substitutions.">
    <original>G</original>
    <variation>H</variation>
    <location>
        <position position="262"/>
    </location>
</feature>
<feature type="sequence variant" id="VAR_045308" description="In sporadic cancers; somatic mutation; dbSNP:rs200579969.">
    <original>G</original>
    <variation>S</variation>
    <location>
        <position position="262"/>
    </location>
</feature>
<feature type="sequence variant" id="VAR_045309" description="In sporadic cancers; somatic mutation; dbSNP:rs1131691025." evidence="189">
    <original>G</original>
    <variation>V</variation>
    <location>
        <position position="262"/>
    </location>
</feature>
<feature type="sequence variant" id="VAR_045310" description="In sporadic cancers; somatic mutation; dbSNP:rs72661119.">
    <original>N</original>
    <variation>D</variation>
    <location>
        <position position="263"/>
    </location>
</feature>
<feature type="sequence variant" id="VAR_045311" description="In sporadic cancers; somatic mutation.">
    <original>N</original>
    <variation>H</variation>
    <location>
        <position position="263"/>
    </location>
</feature>
<feature type="sequence variant" id="VAR_045312" description="In sporadic cancers; somatic mutation.">
    <original>N</original>
    <variation>I</variation>
    <location>
        <position position="263"/>
    </location>
</feature>
<feature type="sequence variant" id="VAR_045313" description="In a sporadic cancer; somatic mutation.">
    <original>N</original>
    <variation>K</variation>
    <location>
        <position position="263"/>
    </location>
</feature>
<feature type="sequence variant" id="VAR_045314" description="In a sporadic cancer; somatic mutation.">
    <original>N</original>
    <variation>S</variation>
    <location>
        <position position="263"/>
    </location>
</feature>
<feature type="sequence variant" id="VAR_045315" description="In sporadic cancers; somatic mutation.">
    <original>L</original>
    <variation>I</variation>
    <location>
        <position position="264"/>
    </location>
</feature>
<feature type="sequence variant" id="VAR_045316" description="In a sporadic cancer; somatic mutation; dbSNP:rs1555525353.">
    <original>L</original>
    <variation>P</variation>
    <location>
        <position position="264"/>
    </location>
</feature>
<feature type="sequence variant" id="VAR_045317" description="In a sporadic cancer; somatic mutation.">
    <original>L</original>
    <variation>Q</variation>
    <location>
        <position position="264"/>
    </location>
</feature>
<feature type="sequence variant" id="VAR_045318" description="In sporadic cancers; somatic mutation.">
    <original>L</original>
    <variation>R</variation>
    <location>
        <position position="264"/>
    </location>
</feature>
<feature type="sequence variant" id="VAR_045319" description="In a sporadic cancer; somatic mutation.">
    <original>L</original>
    <variation>V</variation>
    <location>
        <position position="264"/>
    </location>
</feature>
<feature type="sequence variant" id="VAR_045320" description="In sporadic cancers; somatic mutation.">
    <original>L</original>
    <variation>M</variation>
    <location>
        <position position="265"/>
    </location>
</feature>
<feature type="sequence variant" id="VAR_045321" description="In LFS; germline mutation and in sporadic cancers; somatic mutation; dbSNP:rs879253942.">
    <original>L</original>
    <variation>P</variation>
    <location>
        <position position="265"/>
    </location>
</feature>
<feature type="sequence variant" id="VAR_045322" description="In sporadic cancers; somatic mutation.">
    <original>L</original>
    <variation>Q</variation>
    <location>
        <position position="265"/>
    </location>
</feature>
<feature type="sequence variant" id="VAR_047197" description="In sporadic cancers; somatic mutation.">
    <original>L</original>
    <variation>R</variation>
    <location>
        <position position="265"/>
    </location>
</feature>
<feature type="sequence variant" id="VAR_045323" description="In sporadic cancers; somatic mutation.">
    <original>G</original>
    <variation>A</variation>
    <location>
        <position position="266"/>
    </location>
</feature>
<feature type="sequence variant" id="VAR_045324" description="In sporadic cancers; somatic mutation; dbSNP:rs193920774.">
    <original>G</original>
    <variation>E</variation>
    <location>
        <position position="266"/>
    </location>
</feature>
<feature type="sequence variant" id="VAR_045325" description="In sporadic cancers; somatic mutation; dbSNP:rs1057519990.">
    <original>G</original>
    <variation>R</variation>
    <location>
        <position position="266"/>
    </location>
</feature>
<feature type="sequence variant" id="VAR_045326" description="In sporadic cancers; somatic mutation; dbSNP:rs193920774.">
    <original>G</original>
    <variation>V</variation>
    <location>
        <position position="266"/>
    </location>
</feature>
<feature type="sequence variant" id="VAR_045327" description="In sporadic cancers; somatic mutation.">
    <original>R</original>
    <variation>G</variation>
    <location>
        <position position="267"/>
    </location>
</feature>
<feature type="sequence variant" id="VAR_045328" description="In a sporadic cancer; somatic mutation.">
    <original>R</original>
    <variation>H</variation>
    <location>
        <position position="267"/>
    </location>
</feature>
<feature type="sequence variant" id="VAR_045329" description="In sporadic cancers; somatic mutation; dbSNP:rs587780075.">
    <original>R</original>
    <variation>P</variation>
    <location>
        <position position="267"/>
    </location>
</feature>
<feature type="sequence variant" id="VAR_045330" description="In LFS; germline mutation and in sporadic cancers; somatic mutation; dbSNP:rs587780075.">
    <original>R</original>
    <variation>Q</variation>
    <location>
        <position position="267"/>
    </location>
</feature>
<feature type="sequence variant" id="VAR_036507" description="In sporadic cancers; somatic mutation; dbSNP:rs55832599." evidence="65">
    <original>R</original>
    <variation>W</variation>
    <location>
        <position position="267"/>
    </location>
</feature>
<feature type="sequence variant" id="VAR_045864" description="In a sporadic cancer; somatic mutation; requires 2 nucleotide substitutions.">
    <original>N</original>
    <variation>F</variation>
    <location>
        <position position="268"/>
    </location>
</feature>
<feature type="sequence variant" id="VAR_045331" description="In sporadic cancers; somatic mutation.">
    <original>N</original>
    <variation>H</variation>
    <location>
        <position position="268"/>
    </location>
</feature>
<feature type="sequence variant" id="VAR_045332" description="In sporadic cancers; somatic mutation.">
    <original>N</original>
    <variation>I</variation>
    <location>
        <position position="268"/>
    </location>
</feature>
<feature type="sequence variant" id="VAR_045333" description="In a sporadic cancer; somatic mutation.">
    <original>N</original>
    <variation>K</variation>
    <location>
        <position position="268"/>
    </location>
</feature>
<feature type="sequence variant" id="VAR_045334" description="In sporadic cancers; somatic mutation.">
    <original>N</original>
    <variation>S</variation>
    <location>
        <position position="268"/>
    </location>
</feature>
<feature type="sequence variant" id="VAR_045335" description="In a sporadic cancer; somatic mutation.">
    <original>N</original>
    <variation>Y</variation>
    <location>
        <position position="268"/>
    </location>
</feature>
<feature type="sequence variant" id="VAR_045336" description="In sporadic cancers; somatic mutation.">
    <original>S</original>
    <variation>C</variation>
    <location>
        <position position="269"/>
    </location>
</feature>
<feature type="sequence variant" id="VAR_045337" description="In sporadic cancers; somatic mutation.">
    <original>S</original>
    <variation>G</variation>
    <location>
        <position position="269"/>
    </location>
</feature>
<feature type="sequence variant" id="VAR_047198" description="In a sporadic cancer; somatic mutation.">
    <original>S</original>
    <variation>I</variation>
    <location>
        <position position="269"/>
    </location>
</feature>
<feature type="sequence variant" id="VAR_045338" description="In sporadic cancers; somatic mutation.">
    <original>S</original>
    <variation>N</variation>
    <location>
        <position position="269"/>
    </location>
</feature>
<feature type="sequence variant" id="VAR_045339" description="In sporadic cancers; somatic mutation.">
    <original>S</original>
    <variation>R</variation>
    <location>
        <position position="269"/>
    </location>
</feature>
<feature type="sequence variant" id="VAR_045340" description="In a sporadic cancer; somatic mutation.">
    <original>S</original>
    <variation>T</variation>
    <location>
        <position position="269"/>
    </location>
</feature>
<feature type="sequence variant" id="VAR_045341" description="In sporadic cancers; somatic mutation; dbSNP:rs1057519986.">
    <original>F</original>
    <variation>C</variation>
    <location>
        <position position="270"/>
    </location>
</feature>
<feature type="sequence variant" id="VAR_045342" description="In sporadic cancers; somatic mutation; dbSNP:rs1057519988.">
    <original>F</original>
    <variation>I</variation>
    <location>
        <position position="270"/>
    </location>
</feature>
<feature type="sequence variant" id="VAR_045343" description="In sporadic cancers; somatic mutation; dbSNP:rs1057519987.">
    <original>F</original>
    <variation>L</variation>
    <location>
        <position position="270"/>
    </location>
</feature>
<feature type="sequence variant" id="VAR_045344" description="In sporadic cancers; somatic mutation; dbSNP:rs1057519986.">
    <original>F</original>
    <variation>S</variation>
    <location>
        <position position="270"/>
    </location>
</feature>
<feature type="sequence variant" id="VAR_045345" description="In sporadic cancers; somatic mutation; dbSNP:rs1057519988.">
    <original>F</original>
    <variation>V</variation>
    <location>
        <position position="270"/>
    </location>
</feature>
<feature type="sequence variant" id="VAR_045346" description="In sporadic cancers; somatic mutation.">
    <original>F</original>
    <variation>Y</variation>
    <location>
        <position position="270"/>
    </location>
</feature>
<feature type="sequence variant" id="VAR_045347" description="In sporadic cancers; somatic mutation.">
    <original>E</original>
    <variation>A</variation>
    <location>
        <position position="271"/>
    </location>
</feature>
<feature type="sequence variant" id="VAR_045348" description="In sporadic cancers; somatic mutation.">
    <original>E</original>
    <variation>D</variation>
    <location>
        <position position="271"/>
    </location>
</feature>
<feature type="sequence variant" id="VAR_045349" description="In sporadic cancers; somatic mutation.">
    <original>E</original>
    <variation>G</variation>
    <location>
        <position position="271"/>
    </location>
</feature>
<feature type="sequence variant" id="VAR_036508" description="In sporadic cancers; somatic mutation; dbSNP:rs1060501191." evidence="65">
    <original>E</original>
    <variation>K</variation>
    <location>
        <position position="271"/>
    </location>
</feature>
<feature type="sequence variant" id="VAR_045865" description="In a sporadic cancer; somatic mutation; requires 2 nucleotide substitutions.">
    <original>E</original>
    <variation>P</variation>
    <location>
        <position position="271"/>
    </location>
</feature>
<feature type="sequence variant" id="VAR_045350" description="In sporadic cancers; somatic mutation.">
    <original>E</original>
    <variation>Q</variation>
    <location>
        <position position="271"/>
    </location>
</feature>
<feature type="sequence variant" id="VAR_045866" description="In a sporadic cancer; somatic mutation; requires 2 nucleotide substitutions.">
    <original>E</original>
    <variation>R</variation>
    <location>
        <position position="271"/>
    </location>
</feature>
<feature type="sequence variant" id="VAR_047199" description="In an osteosarcoma with no family history; germline mutation and in sporadic cancers; somatic mutation.">
    <original>E</original>
    <variation>V</variation>
    <location>
        <position position="271"/>
    </location>
</feature>
<feature type="sequence variant" id="VAR_045351" description="In a familial cancer not matching LFS; germline mutation and in sporadic cancers; somatic mutation.">
    <original>V</original>
    <variation>A</variation>
    <location>
        <position position="272"/>
    </location>
</feature>
<feature type="sequence variant" id="VAR_045352" description="In sporadic cancers; somatic mutation; dbSNP:rs876660333.">
    <original>V</original>
    <variation>E</variation>
    <location>
        <position position="272"/>
    </location>
</feature>
<feature type="sequence variant" id="VAR_045353" description="In sporadic cancers; somatic mutation; dbSNP:rs876660333.">
    <original>V</original>
    <variation>G</variation>
    <location>
        <position position="272"/>
    </location>
</feature>
<feature type="sequence variant" id="VAR_005992" description="In LFS; germline mutation and in sporadic cancers; somatic mutation; dbSNP:rs121912657." evidence="81">
    <original>V</original>
    <variation>L</variation>
    <location>
        <position position="272"/>
    </location>
</feature>
<feature type="sequence variant" id="VAR_045354" description="In sporadic cancers; somatic mutation; dbSNP:rs121912657.">
    <original>V</original>
    <variation>M</variation>
    <location>
        <position position="272"/>
    </location>
</feature>
<feature type="sequence variant" id="VAR_005993" description="In LFS; germline mutation and in sporadic cancers; somatic mutation; dbSNP:rs121913343." evidence="65 75 172 182">
    <original>R</original>
    <variation>C</variation>
    <location>
        <position position="273"/>
    </location>
</feature>
<feature type="sequence variant" id="VAR_005994" description="In LFS; germline mutation and in sporadic cancers; somatic mutation.">
    <original>R</original>
    <variation>G</variation>
    <location>
        <position position="273"/>
    </location>
</feature>
<feature type="sequence variant" id="VAR_005995" description="In LFS; germline mutation and in sporadic cancers; somatic mutation; abolishes sequence-specific DNA binding; does not induce SNAI1 degradation; dbSNP:rs28934576." evidence="7 32 47 65 66 95 121 171 186">
    <original>R</original>
    <variation>H</variation>
    <location>
        <position position="273"/>
    </location>
</feature>
<feature type="sequence variant" id="VAR_036509" description="In LFS; germline mutation and in sporadic cancers; somatic mutation; dbSNP:rs28934576." evidence="65">
    <original>R</original>
    <variation>L</variation>
    <location>
        <position position="273"/>
    </location>
</feature>
<feature type="sequence variant" id="VAR_045867" description="In a sporadic cancer; somatic mutation; requires 2 nucleotide substitutions.">
    <original>R</original>
    <variation>N</variation>
    <location>
        <position position="273"/>
    </location>
</feature>
<feature type="sequence variant" id="VAR_045355" description="In sporadic cancers; somatic mutation; dbSNP:rs28934576." evidence="153">
    <original>R</original>
    <variation>P</variation>
    <location>
        <position position="273"/>
    </location>
</feature>
<feature type="sequence variant" id="VAR_045356" description="In sporadic cancers; somatic mutation.">
    <original>R</original>
    <variation>Q</variation>
    <location>
        <position position="273"/>
    </location>
</feature>
<feature type="sequence variant" id="VAR_045357" description="In a familial cancer not matching LFS; germline mutation and in sporadic cancers; somatic mutation; dbSNP:rs121913343.">
    <original>R</original>
    <variation>S</variation>
    <location>
        <position position="273"/>
    </location>
</feature>
<feature type="sequence variant" id="VAR_045868" description="In a sporadic cancer; somatic mutation; requires 2 nucleotide substitutions.">
    <original>R</original>
    <variation>Y</variation>
    <location>
        <position position="273"/>
    </location>
</feature>
<feature type="sequence variant" id="VAR_045358" description="In sporadic cancers; somatic mutation; dbSNP:rs1057520006.">
    <original>V</original>
    <variation>A</variation>
    <location>
        <position position="274"/>
    </location>
</feature>
<feature type="sequence variant" id="VAR_045359" description="In sporadic cancers; somatic mutation; dbSNP:rs1057520006.">
    <original>V</original>
    <variation>D</variation>
    <location>
        <position position="274"/>
    </location>
</feature>
<feature type="sequence variant" id="VAR_005997" description="In sporadic cancers; somatic mutation; dbSNP:rs1057520005.">
    <original>V</original>
    <variation>F</variation>
    <location>
        <position position="274"/>
    </location>
</feature>
<feature type="sequence variant" id="VAR_047200" description="In sporadic cancers; somatic mutation; dbSNP:rs1057520006.">
    <original>V</original>
    <variation>G</variation>
    <location>
        <position position="274"/>
    </location>
</feature>
<feature type="sequence variant" id="VAR_045360" description="In sporadic cancers; somatic mutation.">
    <original>V</original>
    <variation>I</variation>
    <location>
        <position position="274"/>
    </location>
</feature>
<feature type="sequence variant" id="VAR_045361" description="In sporadic cancers; somatic mutation; dbSNP:rs1057520005.">
    <original>V</original>
    <variation>L</variation>
    <location>
        <position position="274"/>
    </location>
</feature>
<feature type="sequence variant" id="VAR_045362" description="In sporadic cancers; somatic mutation; dbSNP:rs863224451.">
    <original>C</original>
    <variation>F</variation>
    <location>
        <position position="275"/>
    </location>
</feature>
<feature type="sequence variant" id="VAR_045363" description="In sporadic cancers; somatic mutation.">
    <original>C</original>
    <variation>G</variation>
    <location>
        <position position="275"/>
    </location>
</feature>
<feature type="sequence variant" id="VAR_045364" description="In sporadic cancers; somatic mutation; dbSNP:rs1057519983.">
    <original>C</original>
    <variation>R</variation>
    <location>
        <position position="275"/>
    </location>
</feature>
<feature type="sequence variant" id="VAR_045365" description="In sporadic cancers; somatic mutation; dbSNP:rs863224451.">
    <original>C</original>
    <variation>S</variation>
    <location>
        <position position="275"/>
    </location>
</feature>
<feature type="sequence variant" id="VAR_005999" description="In sporadic cancers; somatic mutation; dbSNP:rs1555525279.">
    <original>C</original>
    <variation>W</variation>
    <location>
        <position position="275"/>
    </location>
</feature>
<feature type="sequence variant" id="VAR_005998" description="In LFS; germline mutation and in sporadic cancers; somatic mutation; dbSNP:rs863224451." evidence="172">
    <original>C</original>
    <variation>Y</variation>
    <location>
        <position position="275"/>
    </location>
</feature>
<feature type="sequence variant" id="VAR_045366" description="In sporadic cancers; somatic mutation; dbSNP:rs786202082.">
    <original>A</original>
    <variation>D</variation>
    <location>
        <position position="276"/>
    </location>
</feature>
<feature type="sequence variant" id="VAR_045367" description="In sporadic cancers; somatic mutation; dbSNP:rs786202082.">
    <original>A</original>
    <variation>G</variation>
    <location>
        <position position="276"/>
    </location>
</feature>
<feature type="sequence variant" id="VAR_045368" description="In sporadic cancers; somatic mutation; dbSNP:rs1131691029.">
    <original>A</original>
    <variation>P</variation>
    <location>
        <position position="276"/>
    </location>
</feature>
<feature type="sequence variant" id="VAR_045369" description="In sporadic cancers; somatic mutation.">
    <original>A</original>
    <variation>S</variation>
    <location>
        <position position="276"/>
    </location>
</feature>
<feature type="sequence variant" id="VAR_045370" description="In sporadic cancers; somatic mutation.">
    <original>A</original>
    <variation>T</variation>
    <location>
        <position position="276"/>
    </location>
</feature>
<feature type="sequence variant" id="VAR_045371" description="In sporadic cancers; somatic mutation.">
    <original>A</original>
    <variation>V</variation>
    <location>
        <position position="276"/>
    </location>
</feature>
<feature type="sequence variant" id="VAR_045372" description="In sporadic cancers; somatic mutation; dbSNP:rs763098116.">
    <original>C</original>
    <variation>F</variation>
    <location>
        <position position="277"/>
    </location>
</feature>
<feature type="sequence variant" id="VAR_006000" description="In sporadic cancers; somatic mutation; dbSNP:rs1064795369.">
    <original>C</original>
    <variation>G</variation>
    <location>
        <position position="277"/>
    </location>
</feature>
<feature type="sequence variant" id="VAR_045373" description="In sporadic cancers; somatic mutation; dbSNP:rs1064795369.">
    <original>C</original>
    <variation>R</variation>
    <location>
        <position position="277"/>
    </location>
</feature>
<feature type="sequence variant" id="VAR_045374" description="In sporadic cancers; somatic mutation.">
    <original>C</original>
    <variation>S</variation>
    <location>
        <position position="277"/>
    </location>
</feature>
<feature type="sequence variant" id="VAR_047201" description="In sporadic cancers; somatic mutation.">
    <original>C</original>
    <variation>W</variation>
    <location>
        <position position="277"/>
    </location>
</feature>
<feature type="sequence variant" id="VAR_045375" description="In an osteosarcoma with no family history; germline mutation and in sporadic cancers; somatic mutation; dbSNP:rs763098116.">
    <original>C</original>
    <variation>Y</variation>
    <location>
        <position position="277"/>
    </location>
</feature>
<feature type="sequence variant" id="VAR_006001" description="In sporadic cancers; somatic mutation; dbSNP:rs17849781." evidence="45">
    <original>P</original>
    <variation>A</variation>
    <location>
        <position position="278"/>
    </location>
</feature>
<feature type="sequence variant" id="VAR_045869" description="In sporadic cancers; somatic mutation; requires 2 nucleotide substitutions.">
    <original>P</original>
    <variation>F</variation>
    <location>
        <position position="278"/>
    </location>
</feature>
<feature type="sequence variant" id="VAR_006002" description="In sporadic cancers; somatic mutation; dbSNP:rs876659802.">
    <original>P</original>
    <variation>H</variation>
    <location>
        <position position="278"/>
    </location>
</feature>
<feature type="sequence variant" id="VAR_006003" description="In LFS; germline mutation and in sporadic cancers; somatic mutation; dbSNP:rs876659802." evidence="136">
    <original>P</original>
    <variation>L</variation>
    <location>
        <position position="278"/>
    </location>
</feature>
<feature type="sequence variant" id="VAR_045376" description="In sporadic cancers; somatic mutation; dbSNP:rs876659802.">
    <original>P</original>
    <variation>R</variation>
    <location>
        <position position="278"/>
    </location>
</feature>
<feature type="sequence variant" id="VAR_006004" description="In LFS; germline mutation and in sporadic cancers; somatic mutation; dbSNP:rs17849781." evidence="65 136 182">
    <original>P</original>
    <variation>S</variation>
    <location>
        <position position="278"/>
    </location>
</feature>
<feature type="sequence variant" id="VAR_006005" description="In LFS; germline mutation and in sporadic cancers; somatic mutation; dbSNP:rs17849781.">
    <original>P</original>
    <variation>T</variation>
    <location>
        <position position="278"/>
    </location>
</feature>
<feature type="sequence variant" id="VAR_006006" description="In sporadic cancers; somatic mutation; dbSNP:rs1064793881.">
    <original>G</original>
    <variation>E</variation>
    <location>
        <position position="279"/>
    </location>
</feature>
<feature type="sequence variant" id="VAR_045377" description="In sporadic cancers; somatic mutation; dbSNP:rs1555525248.">
    <original>G</original>
    <variation>R</variation>
    <location>
        <position position="279"/>
    </location>
</feature>
<feature type="sequence variant" id="VAR_045378" description="In sporadic cancers; somatic mutation.">
    <original>G</original>
    <variation>V</variation>
    <location>
        <position position="279"/>
    </location>
</feature>
<feature type="sequence variant" id="VAR_045379" description="In sporadic cancers; somatic mutation.">
    <original>G</original>
    <variation>W</variation>
    <location>
        <position position="279"/>
    </location>
</feature>
<feature type="sequence variant" id="VAR_045380" description="In sporadic cancers; somatic mutation; dbSNP:rs753660142.">
    <original>R</original>
    <variation>G</variation>
    <location>
        <position position="280"/>
    </location>
</feature>
<feature type="sequence variant" id="VAR_006008" description="In sporadic cancers; somatic mutation; dbSNP:rs121912660." evidence="65">
    <original>R</original>
    <variation>I</variation>
    <location>
        <position position="280"/>
    </location>
</feature>
<feature type="sequence variant" id="VAR_006007" description="In a familial cancer not matching LFS; germline mutation and in sporadic cancers; somatic mutation; no effect on interaction with CCAR2; dbSNP:rs121912660." evidence="64 148">
    <original>R</original>
    <variation>K</variation>
    <location>
        <position position="280"/>
    </location>
</feature>
<feature type="sequence variant" id="VAR_045381" description="In a sporadic cancer; somatic mutation.">
    <original>R</original>
    <variation>P</variation>
    <location>
        <position position="280"/>
    </location>
</feature>
<feature type="sequence variant" id="VAR_045382" description="In sporadic cancers; somatic mutation.">
    <original>R</original>
    <variation>S</variation>
    <location>
        <position position="280"/>
    </location>
</feature>
<feature type="sequence variant" id="VAR_006009" description="In sporadic cancers; somatic mutation; dbSNP:rs121912660." evidence="54">
    <original>R</original>
    <variation>T</variation>
    <location>
        <position position="280"/>
    </location>
</feature>
<feature type="sequence variant" id="VAR_047203" description="In sporadic cancers; somatic mutation.">
    <original>DR</original>
    <variation>EW</variation>
    <location>
        <begin position="281"/>
        <end position="282"/>
    </location>
</feature>
<feature type="sequence variant" id="VAR_006010" description="In sporadic cancers; somatic mutation; dbSNP:rs587781525.">
    <original>D</original>
    <variation>A</variation>
    <location>
        <position position="281"/>
    </location>
</feature>
<feature type="sequence variant" id="VAR_006011" description="In sporadic cancers; somatic mutation; dbSNP:rs1057519984." evidence="34">
    <original>D</original>
    <variation>E</variation>
    <location>
        <position position="281"/>
    </location>
</feature>
<feature type="sequence variant" id="VAR_006012" description="In a brain tumor with no family history; germline mutation and in sporadic cancers; somatic mutation; dbSNP:rs587781525.">
    <original>D</original>
    <variation>G</variation>
    <location>
        <position position="281"/>
    </location>
</feature>
<feature type="sequence variant" id="VAR_006013" description="In sporadic cancers; somatic mutation; dbSNP:rs764146326." evidence="65">
    <original>D</original>
    <variation>H</variation>
    <location>
        <position position="281"/>
    </location>
</feature>
<feature type="sequence variant" id="VAR_047202" description="In LFS; germline mutation and in sporadic cancers; somatic mutation; dbSNP:rs764146326.">
    <original>D</original>
    <variation>N</variation>
    <location>
        <position position="281"/>
    </location>
</feature>
<feature type="sequence variant" id="VAR_045870" description="In a sporadic cancer; somatic mutation; requires 2 nucleotide substitutions.">
    <original>D</original>
    <variation>R</variation>
    <location>
        <position position="281"/>
    </location>
</feature>
<feature type="sequence variant" id="VAR_006014" description="In a familial cancer not matching LFS; germline mutation and in sporadic cancers; somatic mutation; dbSNP:rs587781525.">
    <original>D</original>
    <variation>V</variation>
    <location>
        <position position="281"/>
    </location>
</feature>
<feature type="sequence variant" id="VAR_045383" description="In sporadic cancers; somatic mutation; dbSNP:rs764146326.">
    <original>D</original>
    <variation>Y</variation>
    <location>
        <position position="281"/>
    </location>
</feature>
<feature type="sequence variant" id="VAR_045384" description="In LFS; germline mutation and in sporadic cancers; somatic mutation; dbSNP:rs28934574.">
    <original>R</original>
    <variation>G</variation>
    <location>
        <position position="282"/>
    </location>
</feature>
<feature type="sequence variant" id="VAR_045385" description="In a sporadic cancer; somatic mutation.">
    <original>R</original>
    <variation>H</variation>
    <location>
        <position position="282"/>
    </location>
</feature>
<feature type="sequence variant" id="VAR_006015" description="In sporadic cancers; somatic mutation; dbSNP:rs730882008.">
    <original>R</original>
    <variation>L</variation>
    <location>
        <position position="282"/>
    </location>
</feature>
<feature type="sequence variant" id="VAR_045386" description="In sporadic cancers; somatic mutation; dbSNP:rs730882008.">
    <original>R</original>
    <variation>P</variation>
    <location>
        <position position="282"/>
    </location>
</feature>
<feature type="sequence variant" id="VAR_045387" description="In a familial cancer not matching LFS; germline mutation and in sporadic cancers; somatic mutation; dbSNP:rs730882008." evidence="92 188">
    <original>R</original>
    <variation>Q</variation>
    <location>
        <position position="282"/>
    </location>
</feature>
<feature type="sequence variant" id="VAR_006016" description="In LFS; germline mutation and in sporadic cancers; somatic mutation; does not induce SNAI1 degradation; dbSNP:rs28934574." evidence="121 177">
    <original>R</original>
    <variation>W</variation>
    <location>
        <position position="282"/>
    </location>
</feature>
<feature type="sequence variant" id="VAR_006017" description="In LFS; germline mutation and in sporadic cancers; somatic mutation; dbSNP:rs149633775.">
    <original>R</original>
    <variation>C</variation>
    <location>
        <position position="283"/>
    </location>
</feature>
<feature type="sequence variant" id="VAR_006018" description="In sporadic cancers; somatic mutation.">
    <original>R</original>
    <variation>G</variation>
    <location>
        <position position="283"/>
    </location>
</feature>
<feature type="sequence variant" id="VAR_006019" description="In a brain tumor with no family history; germline mutation and in sporadic cancers; somatic mutation; dbSNP:rs371409680.">
    <original>R</original>
    <variation>H</variation>
    <location>
        <position position="283"/>
    </location>
</feature>
<feature type="sequence variant" id="VAR_045388" description="In sporadic cancers; somatic mutation.">
    <original>R</original>
    <variation>L</variation>
    <location>
        <position position="283"/>
    </location>
</feature>
<feature type="sequence variant" id="VAR_006020" description="In sporadic cancers; somatic mutation.">
    <original>R</original>
    <variation>P</variation>
    <location>
        <position position="283"/>
    </location>
</feature>
<feature type="sequence variant" id="VAR_045389" description="In a sporadic cancer; somatic mutation; dbSNP:rs149633775.">
    <original>R</original>
    <variation>S</variation>
    <location>
        <position position="283"/>
    </location>
</feature>
<feature type="sequence variant" id="VAR_006021" description="In sporadic cancers; somatic mutation." evidence="125">
    <original>T</original>
    <variation>A</variation>
    <location>
        <position position="284"/>
    </location>
</feature>
<feature type="sequence variant" id="VAR_045390" description="In sporadic cancers; somatic mutation; dbSNP:rs863224685.">
    <original>T</original>
    <variation>I</variation>
    <location>
        <position position="284"/>
    </location>
</feature>
<feature type="sequence variant" id="VAR_045391" description="In sporadic cancers; somatic mutation.">
    <original>T</original>
    <variation>K</variation>
    <location>
        <position position="284"/>
    </location>
</feature>
<feature type="sequence variant" id="VAR_006022" description="In sporadic cancers; somatic mutation; dbSNP:rs1204379654.">
    <original>T</original>
    <variation>P</variation>
    <location>
        <position position="284"/>
    </location>
</feature>
<feature type="sequence variant" id="VAR_045392" description="In a sporadic cancer; somatic mutation.">
    <original>E</original>
    <variation>A</variation>
    <location>
        <position position="285"/>
    </location>
</feature>
<feature type="sequence variant" id="VAR_045393" description="In sporadic cancers; somatic mutation.">
    <original>E</original>
    <variation>D</variation>
    <location>
        <position position="285"/>
    </location>
</feature>
<feature type="sequence variant" id="VAR_045394" description="In sporadic cancers; somatic mutation.">
    <original>E</original>
    <variation>G</variation>
    <location>
        <position position="285"/>
    </location>
</feature>
<feature type="sequence variant" id="VAR_006023" description="In sporadic cancers; somatic mutation; dbSNP:rs112431538." evidence="34 64">
    <original>E</original>
    <variation>K</variation>
    <location>
        <position position="285"/>
    </location>
</feature>
<feature type="sequence variant" id="VAR_006024" description="In LFS; germline mutation and in sporadic cancers; somatic mutation.">
    <original>E</original>
    <variation>Q</variation>
    <location>
        <position position="285"/>
    </location>
</feature>
<feature type="sequence variant" id="VAR_006025" description="In sporadic cancers; somatic mutation; dbSNP:rs121912667.">
    <original>E</original>
    <variation>V</variation>
    <location>
        <position position="285"/>
    </location>
</feature>
<feature type="sequence variant" id="VAR_006026" description="In LFS; germline mutation and in sporadic cancers; somatic mutation; dbSNP:rs1057519985.">
    <original>E</original>
    <variation>A</variation>
    <location>
        <position position="286"/>
    </location>
</feature>
<feature type="sequence variant" id="VAR_006027" description="In sporadic cancers; somatic mutation.">
    <original>E</original>
    <variation>D</variation>
    <location>
        <position position="286"/>
    </location>
</feature>
<feature type="sequence variant" id="VAR_006028" description="In sporadic cancers; somatic mutation; dbSNP:rs1057519985.">
    <original>E</original>
    <variation>G</variation>
    <location>
        <position position="286"/>
    </location>
</feature>
<feature type="sequence variant" id="VAR_006029" description="In sporadic cancers; somatic mutation; dbSNP:rs786201059." evidence="14 174">
    <original>E</original>
    <variation>K</variation>
    <location>
        <position position="286"/>
    </location>
</feature>
<feature type="sequence variant" id="VAR_045871" description="In a sporadic cancer; somatic mutation; requires 2 nucleotide substitutions.">
    <original>E</original>
    <variation>L</variation>
    <location>
        <position position="286"/>
    </location>
</feature>
<feature type="sequence variant" id="VAR_006030" description="In sporadic cancers; somatic mutation; dbSNP:rs786201059." evidence="177">
    <original>E</original>
    <variation>Q</variation>
    <location>
        <position position="286"/>
    </location>
</feature>
<feature type="sequence variant" id="VAR_045395" description="In sporadic cancers; somatic mutation; dbSNP:rs1057519985.">
    <original>E</original>
    <variation>V</variation>
    <location>
        <position position="286"/>
    </location>
</feature>
<feature type="sequence variant" id="VAR_047204" description="In a sporadic cancer; somatic mutation.">
    <original>E</original>
    <variation>A</variation>
    <location>
        <position position="287"/>
    </location>
</feature>
<feature type="sequence variant" id="VAR_045396" description="In sporadic cancers; somatic mutation; dbSNP:rs748891343.">
    <original>E</original>
    <variation>D</variation>
    <location>
        <position position="287"/>
    </location>
</feature>
<feature type="sequence variant" id="VAR_045397" description="In sporadic cancers; somatic mutation.">
    <original>E</original>
    <variation>G</variation>
    <location>
        <position position="287"/>
    </location>
</feature>
<feature type="sequence variant" id="VAR_045398" description="In sporadic cancers; somatic mutation; dbSNP:rs587782006.">
    <original>E</original>
    <variation>K</variation>
    <location>
        <position position="287"/>
    </location>
</feature>
<feature type="sequence variant" id="VAR_045399" description="In sporadic cancers; somatic mutation.">
    <original>E</original>
    <variation>V</variation>
    <location>
        <position position="287"/>
    </location>
</feature>
<feature type="sequence variant" id="VAR_045400" description="In a sporadic cancer; somatic mutation.">
    <original>N</original>
    <variation>D</variation>
    <location>
        <position position="288"/>
    </location>
</feature>
<feature type="sequence variant" id="VAR_045401" description="In sporadic cancers; somatic mutation.">
    <original>N</original>
    <variation>K</variation>
    <location>
        <position position="288"/>
    </location>
</feature>
<feature type="sequence variant" id="VAR_045402" description="In sporadic cancers; somatic mutation.">
    <original>N</original>
    <variation>S</variation>
    <location>
        <position position="288"/>
    </location>
</feature>
<feature type="sequence variant" id="VAR_045403" description="In sporadic cancers; somatic mutation.">
    <original>N</original>
    <variation>T</variation>
    <location>
        <position position="288"/>
    </location>
</feature>
<feature type="sequence variant" id="VAR_045404" description="In sporadic cancers; somatic mutation.">
    <original>N</original>
    <variation>Y</variation>
    <location>
        <position position="288"/>
    </location>
</feature>
<feature type="sequence variant" id="VAR_045405" description="In sporadic cancers; somatic mutation.">
    <original>L</original>
    <variation>F</variation>
    <location>
        <position position="289"/>
    </location>
</feature>
<feature type="sequence variant" id="VAR_045406" description="In sporadic cancers; somatic mutation.">
    <original>L</original>
    <variation>H</variation>
    <location>
        <position position="289"/>
    </location>
</feature>
<feature type="sequence variant" id="VAR_045407" description="In sporadic cancers; somatic mutation.">
    <original>L</original>
    <variation>P</variation>
    <location>
        <position position="289"/>
    </location>
</feature>
<feature type="sequence variant" id="VAR_045408" description="In a sporadic cancer; somatic mutation.">
    <original>L</original>
    <variation>R</variation>
    <location>
        <position position="289"/>
    </location>
</feature>
<feature type="sequence variant" id="VAR_045409" description="In sporadic cancers; somatic mutation; dbSNP:rs1555525154.">
    <original>L</original>
    <variation>V</variation>
    <location>
        <position position="289"/>
    </location>
</feature>
<feature type="sequence variant" id="VAR_045410" description="In sporadic cancers; somatic mutation; dbSNP:rs770374782.">
    <original>R</original>
    <variation>C</variation>
    <location>
        <position position="290"/>
    </location>
</feature>
<feature type="sequence variant" id="VAR_045411" description="In LFS; germline mutation and in sporadic cancers; somatic mutation; dbSNP:rs55819519.">
    <original>R</original>
    <variation>H</variation>
    <location>
        <position position="290"/>
    </location>
</feature>
<feature type="sequence variant" id="VAR_045412" description="In LFS; germline mutation and in sporadic cancers; somatic mutation.">
    <original>R</original>
    <variation>L</variation>
    <location>
        <position position="290"/>
    </location>
</feature>
<feature type="sequence variant" id="VAR_045413" description="In sporadic cancers; somatic mutation; dbSNP:rs1555525126.">
    <original>K</original>
    <variation>E</variation>
    <location>
        <position position="291"/>
    </location>
</feature>
<feature type="sequence variant" id="VAR_045414" description="In sporadic cancers; somatic mutation.">
    <original>K</original>
    <variation>M</variation>
    <location>
        <position position="291"/>
    </location>
</feature>
<feature type="sequence variant" id="VAR_045415" description="In sporadic cancers; somatic mutation; dbSNP:rs372613518.">
    <original>K</original>
    <variation>N</variation>
    <location>
        <position position="291"/>
    </location>
</feature>
<feature type="sequence variant" id="VAR_047205" description="In sporadic cancers; somatic mutation.">
    <original>K</original>
    <variation>Q</variation>
    <location>
        <position position="291"/>
    </location>
</feature>
<feature type="sequence variant" id="VAR_045416" description="In sporadic cancers; somatic mutation; dbSNP:rs781490101.">
    <original>K</original>
    <variation>R</variation>
    <location>
        <position position="291"/>
    </location>
</feature>
<feature type="sequence variant" id="VAR_045417" description="In sporadic cancers; somatic mutation.">
    <original>K</original>
    <variation>T</variation>
    <location>
        <position position="291"/>
    </location>
</feature>
<feature type="sequence variant" id="VAR_045418" description="In sporadic cancers; somatic mutation.">
    <original>K</original>
    <variation>E</variation>
    <location>
        <position position="292"/>
    </location>
</feature>
<feature type="sequence variant" id="VAR_045872" description="In a sporadic cancer; somatic mutation; requires 2 nucleotide substitutions.">
    <original>K</original>
    <variation>G</variation>
    <location>
        <position position="292"/>
    </location>
</feature>
<feature type="sequence variant" id="VAR_015819" description="In LFS; germline mutation and in a sporadic cancer; somatic mutation; dbSNP:rs121912663." evidence="5">
    <original>K</original>
    <variation>I</variation>
    <location>
        <position position="292"/>
    </location>
</feature>
<feature type="sequence variant" id="VAR_045419" description="In sporadic cancers; somatic mutation.">
    <original>K</original>
    <variation>N</variation>
    <location>
        <position position="292"/>
    </location>
</feature>
<feature type="sequence variant" id="VAR_045420" description="In a sporadic cancer; somatic mutation.">
    <original>K</original>
    <variation>Q</variation>
    <location>
        <position position="292"/>
    </location>
</feature>
<feature type="sequence variant" id="VAR_045421" description="In sporadic cancers; somatic mutation; dbSNP:rs121912663.">
    <original>K</original>
    <variation>R</variation>
    <location>
        <position position="292"/>
    </location>
</feature>
<feature type="sequence variant" id="VAR_045422" description="In sporadic cancers; somatic mutation.">
    <original>K</original>
    <variation>T</variation>
    <location>
        <position position="292"/>
    </location>
</feature>
<feature type="sequence variant" id="VAR_045423" description="In a sporadic cancer; somatic mutation.">
    <original>G</original>
    <variation>A</variation>
    <location>
        <position position="293"/>
    </location>
</feature>
<feature type="sequence variant" id="VAR_045424" description="In sporadic cancers; somatic mutation; dbSNP:rs587780076.">
    <original>G</original>
    <variation>R</variation>
    <location>
        <position position="293"/>
    </location>
</feature>
<feature type="sequence variant" id="VAR_045425" description="In sporadic cancers; somatic mutation.">
    <original>G</original>
    <variation>V</variation>
    <location>
        <position position="293"/>
    </location>
</feature>
<feature type="sequence variant" id="VAR_045426" description="In a brain tumor with no family history; germline mutation and in sporadic cancers; somatic mutation; dbSNP:rs587780076.">
    <original>G</original>
    <variation>W</variation>
    <location>
        <position position="293"/>
    </location>
</feature>
<feature type="sequence variant" id="VAR_045427" description="In a sporadic cancer; somatic mutation.">
    <original>E</original>
    <variation>A</variation>
    <location>
        <position position="294"/>
    </location>
</feature>
<feature type="sequence variant" id="VAR_045428" description="In sporadic cancers; somatic mutation; dbSNP:rs1305324490.">
    <original>E</original>
    <variation>D</variation>
    <location>
        <position position="294"/>
    </location>
</feature>
<feature type="sequence variant" id="VAR_045429" description="In sporadic cancers; somatic mutation.">
    <original>E</original>
    <variation>G</variation>
    <location>
        <position position="294"/>
    </location>
</feature>
<feature type="sequence variant" id="VAR_047206" description="In sporadic cancers; somatic mutation.">
    <original>E</original>
    <variation>K</variation>
    <location>
        <position position="294"/>
    </location>
</feature>
<feature type="sequence variant" id="VAR_045430" description="In sporadic cancers; somatic mutation.">
    <original>E</original>
    <variation>Q</variation>
    <location>
        <position position="294"/>
    </location>
</feature>
<feature type="sequence variant" id="VAR_045431" description="In sporadic cancers; somatic mutation.">
    <original>E</original>
    <variation>V</variation>
    <location>
        <position position="294"/>
    </location>
</feature>
<feature type="sequence variant" id="VAR_045432" description="In a sporadic cancer; somatic mutation.">
    <original>P</original>
    <variation>H</variation>
    <location>
        <position position="295"/>
    </location>
</feature>
<feature type="sequence variant" id="VAR_045433" description="In sporadic cancers; somatic mutation; dbSNP:rs751713111.">
    <original>P</original>
    <variation>L</variation>
    <location>
        <position position="295"/>
    </location>
</feature>
<feature type="sequence variant" id="VAR_045434" description="In a sporadic cancer; somatic mutation; dbSNP:rs751713111.">
    <original>P</original>
    <variation>R</variation>
    <location>
        <position position="295"/>
    </location>
</feature>
<feature type="sequence variant" id="VAR_045435" description="In sporadic cancers; somatic mutation; dbSNP:rs1131691006.">
    <original>P</original>
    <variation>S</variation>
    <location>
        <position position="295"/>
    </location>
</feature>
<feature type="sequence variant" id="VAR_045873" description="In sporadic cancers; somatic mutation; requires 2 nucleotide substitutions.">
    <original>H</original>
    <variation>C</variation>
    <location>
        <position position="296"/>
    </location>
</feature>
<feature type="sequence variant" id="VAR_045436" description="In sporadic cancers; somatic mutation.">
    <original>H</original>
    <variation>D</variation>
    <location>
        <position position="296"/>
    </location>
</feature>
<feature type="sequence variant" id="VAR_047207" description="In sporadic cancers; somatic mutation.">
    <original>H</original>
    <variation>L</variation>
    <location>
        <position position="296"/>
    </location>
</feature>
<feature type="sequence variant" id="VAR_045437" description="In sporadic cancers; somatic mutation.">
    <original>H</original>
    <variation>N</variation>
    <location>
        <position position="296"/>
    </location>
</feature>
<feature type="sequence variant" id="VAR_006031" description="In a sporadic cancer; somatic mutation.">
    <original>H</original>
    <variation>P</variation>
    <location>
        <position position="296"/>
    </location>
</feature>
<feature type="sequence variant" id="VAR_045438" description="In sporadic cancers; somatic mutation.">
    <original>H</original>
    <variation>Q</variation>
    <location>
        <position position="296"/>
    </location>
</feature>
<feature type="sequence variant" id="VAR_045439" description="In a sporadic cancer; somatic mutation; dbSNP:rs483352696.">
    <original>H</original>
    <variation>R</variation>
    <location>
        <position position="296"/>
    </location>
</feature>
<feature type="sequence variant" id="VAR_045440" description="In sporadic cancers; somatic mutation; dbSNP:rs672601296.">
    <original>H</original>
    <variation>Y</variation>
    <location>
        <position position="296"/>
    </location>
</feature>
<feature type="sequence variant" id="VAR_045441" description="In a sporadic cancer; somatic mutation.">
    <original>H</original>
    <variation>D</variation>
    <location>
        <position position="297"/>
    </location>
</feature>
<feature type="sequence variant" id="VAR_045442" description="In a sporadic cancer; somatic mutation.">
    <original>H</original>
    <variation>N</variation>
    <location>
        <position position="297"/>
    </location>
</feature>
<feature type="sequence variant" id="VAR_045443" description="In sporadic cancers; somatic mutation.">
    <original>H</original>
    <variation>P</variation>
    <location>
        <position position="297"/>
    </location>
</feature>
<feature type="sequence variant" id="VAR_045444" description="In sporadic cancers; somatic mutation; dbSNP:rs876659477.">
    <original>H</original>
    <variation>R</variation>
    <location>
        <position position="297"/>
    </location>
</feature>
<feature type="sequence variant" id="VAR_045445" description="In sporadic cancers; somatic mutation.">
    <original>H</original>
    <variation>Y</variation>
    <location>
        <position position="297"/>
    </location>
</feature>
<feature type="sequence variant" id="VAR_045446" description="In a sporadic cancer; somatic mutation.">
    <original>E</original>
    <variation>A</variation>
    <location>
        <position position="298"/>
    </location>
</feature>
<feature type="sequence variant" id="VAR_045447" description="In sporadic cancers; somatic mutation.">
    <original>E</original>
    <variation>D</variation>
    <location>
        <position position="298"/>
    </location>
</feature>
<feature type="sequence variant" id="VAR_045448" description="In sporadic cancers; somatic mutation; dbSNP:rs201744589.">
    <original>E</original>
    <variation>K</variation>
    <location>
        <position position="298"/>
    </location>
</feature>
<feature type="sequence variant" id="VAR_045449" description="In sporadic cancers; somatic mutation; dbSNP:rs201744589.">
    <original>E</original>
    <variation>Q</variation>
    <location>
        <position position="298"/>
    </location>
</feature>
<feature type="sequence variant" id="VAR_045450" description="In sporadic cancers; somatic mutation.">
    <original>E</original>
    <variation>V</variation>
    <location>
        <position position="298"/>
    </location>
</feature>
<feature type="sequence variant" id="VAR_045451" description="In sporadic cancers; somatic mutation.">
    <original>L</original>
    <variation>P</variation>
    <location>
        <position position="299"/>
    </location>
</feature>
<feature type="sequence variant" id="VAR_045452" description="In sporadic cancers; somatic mutation.">
    <original>L</original>
    <variation>Q</variation>
    <location>
        <position position="299"/>
    </location>
</feature>
<feature type="sequence variant" id="VAR_045453" description="In a sporadic cancer; somatic mutation.">
    <original>L</original>
    <variation>R</variation>
    <location>
        <position position="299"/>
    </location>
</feature>
<feature type="sequence variant" id="VAR_045454" description="In a sporadic cancer; somatic mutation.">
    <original>L</original>
    <variation>V</variation>
    <location>
        <position position="299"/>
    </location>
</feature>
<feature type="sequence variant" id="VAR_045455" description="In sporadic cancers; somatic mutation.">
    <original>P</original>
    <variation>A</variation>
    <location>
        <position position="300"/>
    </location>
</feature>
<feature type="sequence variant" id="VAR_045456" description="In sporadic cancers; somatic mutation; dbSNP:rs909643864.">
    <original>P</original>
    <variation>L</variation>
    <location>
        <position position="300"/>
    </location>
</feature>
<feature type="sequence variant" id="VAR_006032" description="In a sporadic cancer; somatic mutation.">
    <original>P</original>
    <variation>R</variation>
    <location>
        <position position="300"/>
    </location>
</feature>
<feature type="sequence variant" id="VAR_045457" description="In sporadic cancers; somatic mutation.">
    <original>P</original>
    <variation>S</variation>
    <location>
        <position position="300"/>
    </location>
</feature>
<feature type="sequence variant" id="VAR_045458" description="In sporadic cancers; somatic mutation.">
    <original>P</original>
    <variation>A</variation>
    <location>
        <position position="301"/>
    </location>
</feature>
<feature type="sequence variant" id="VAR_006033" description="In sporadic cancers; somatic mutation; dbSNP:rs1555525067.">
    <original>P</original>
    <variation>L</variation>
    <location>
        <position position="301"/>
    </location>
</feature>
<feature type="sequence variant" id="VAR_045459" description="In sporadic cancers; somatic mutation.">
    <original>P</original>
    <variation>Q</variation>
    <location>
        <position position="301"/>
    </location>
</feature>
<feature type="sequence variant" id="VAR_045460" description="In sporadic cancers; somatic mutation.">
    <original>P</original>
    <variation>S</variation>
    <location>
        <position position="301"/>
    </location>
</feature>
<feature type="sequence variant" id="VAR_047208" description="In a sporadic cancer; somatic mutation.">
    <original>P</original>
    <variation>T</variation>
    <location>
        <position position="301"/>
    </location>
</feature>
<feature type="sequence variant" id="VAR_045461" description="In a sporadic cancer; somatic mutation.">
    <original>G</original>
    <variation>A</variation>
    <location>
        <position position="302"/>
    </location>
</feature>
<feature type="sequence variant" id="VAR_006034" description="In sporadic cancers; somatic mutation; dbSNP:rs1060501202.">
    <original>G</original>
    <variation>E</variation>
    <location>
        <position position="302"/>
    </location>
</feature>
<feature type="sequence variant" id="VAR_045462" description="In a sporadic cancer; somatic mutation; dbSNP:rs863224686.">
    <original>G</original>
    <variation>R</variation>
    <location>
        <position position="302"/>
    </location>
</feature>
<feature type="sequence variant" id="VAR_006035" description="In a sporadic cancer; somatic mutation.">
    <original>G</original>
    <variation>V</variation>
    <location>
        <position position="302"/>
    </location>
</feature>
<feature type="sequence variant" id="VAR_045463" description="In sporadic cancers; somatic mutation.">
    <original>S</original>
    <variation>C</variation>
    <location>
        <position position="303"/>
    </location>
</feature>
<feature type="sequence variant" id="VAR_045464" description="In sporadic cancers; somatic mutation.">
    <original>S</original>
    <variation>I</variation>
    <location>
        <position position="303"/>
    </location>
</feature>
<feature type="sequence variant" id="VAR_045465" description="In sporadic cancers; somatic mutation; dbSNP:rs876658714.">
    <original>S</original>
    <variation>N</variation>
    <location>
        <position position="303"/>
    </location>
</feature>
<feature type="sequence variant" id="VAR_045466" description="In sporadic cancers; somatic mutation.">
    <original>S</original>
    <variation>T</variation>
    <location>
        <position position="303"/>
    </location>
</feature>
<feature type="sequence variant" id="VAR_045467" description="In sporadic cancers; somatic mutation; dbSNP:rs587782654.">
    <original>T</original>
    <variation>A</variation>
    <location>
        <position position="304"/>
    </location>
</feature>
<feature type="sequence variant" id="VAR_045468" description="In sporadic cancers; somatic mutation.">
    <original>T</original>
    <variation>I</variation>
    <location>
        <position position="304"/>
    </location>
</feature>
<feature type="sequence variant" id="VAR_045469" description="In a sporadic cancer; somatic mutation.">
    <original>T</original>
    <variation>N</variation>
    <location>
        <position position="304"/>
    </location>
</feature>
<feature type="sequence variant" id="VAR_047209" description="In a sporadic cancer; somatic mutation.">
    <original>T</original>
    <variation>S</variation>
    <location>
        <position position="304"/>
    </location>
</feature>
<feature type="sequence variant" id="VAR_045470" description="In a sporadic cancer; somatic mutation.">
    <original>K</original>
    <variation>E</variation>
    <location>
        <position position="305"/>
    </location>
</feature>
<feature type="sequence variant" id="VAR_045471" description="In a familial cancer not matching LFS; germline mutation and in sporadic cancers; somatic mutation.">
    <original>K</original>
    <variation>M</variation>
    <location>
        <position position="305"/>
    </location>
</feature>
<feature type="sequence variant" id="VAR_045472" description="In sporadic cancers; somatic mutation; loss of nuclear localization." evidence="6">
    <original>K</original>
    <variation>N</variation>
    <location>
        <position position="305"/>
    </location>
</feature>
<feature type="sequence variant" id="VAR_045473" description="In sporadic cancers; somatic mutation.">
    <original>K</original>
    <variation>R</variation>
    <location>
        <position position="305"/>
    </location>
</feature>
<feature type="sequence variant" id="VAR_045474" description="In a sporadic cancer; somatic mutation.">
    <original>K</original>
    <variation>T</variation>
    <location>
        <position position="305"/>
    </location>
</feature>
<feature type="sequence variant" id="VAR_045475" description="In LFS; germline mutation and in a sporadic cancer; somatic mutation.">
    <original>R</original>
    <variation>P</variation>
    <location>
        <position position="306"/>
    </location>
</feature>
<feature type="sequence variant" id="VAR_006036" description="In sporadic cancers; somatic mutation; dbSNP:rs1048095040.">
    <original>R</original>
    <variation>Q</variation>
    <location>
        <position position="306"/>
    </location>
</feature>
<feature type="sequence variant" id="VAR_045476" description="In a sporadic cancer; somatic mutation.">
    <original>A</original>
    <variation>P</variation>
    <location>
        <position position="307"/>
    </location>
</feature>
<feature type="sequence variant" id="VAR_045477" description="In sporadic cancers; somatic mutation.">
    <original>A</original>
    <variation>S</variation>
    <location>
        <position position="307"/>
    </location>
</feature>
<feature type="sequence variant" id="VAR_006037" description="In sporadic cancers; somatic mutation.">
    <original>A</original>
    <variation>T</variation>
    <location>
        <position position="307"/>
    </location>
</feature>
<feature type="sequence variant" id="VAR_045478" description="In sporadic cancers; somatic mutation.">
    <original>L</original>
    <variation>M</variation>
    <location>
        <position position="308"/>
    </location>
</feature>
<feature type="sequence variant" id="VAR_045479" description="In a sporadic cancer; somatic mutation.">
    <original>L</original>
    <variation>V</variation>
    <location>
        <position position="308"/>
    </location>
</feature>
<feature type="sequence variant" id="VAR_045480" description="In a sporadic cancer; somatic mutation.">
    <original>P</original>
    <variation>R</variation>
    <location>
        <position position="309"/>
    </location>
</feature>
<feature type="sequence variant" id="VAR_006038" description="In LFS; germline mutation and in sporadic cancers; somatic mutation; dbSNP:rs1555525012." evidence="186">
    <original>P</original>
    <variation>S</variation>
    <location>
        <position position="309"/>
    </location>
</feature>
<feature type="sequence variant" id="VAR_045481" description="In a sporadic cancer; somatic mutation.">
    <original>N</original>
    <variation>I</variation>
    <location>
        <position position="310"/>
    </location>
</feature>
<feature type="sequence variant" id="VAR_045482" description="In sporadic cancers; somatic mutation.">
    <original>N</original>
    <variation>T</variation>
    <location>
        <position position="310"/>
    </location>
</feature>
<feature type="sequence variant" id="VAR_045483" description="In sporadic cancers; somatic mutation; dbSNP:rs1555525007.">
    <original>N</original>
    <variation>H</variation>
    <location>
        <position position="311"/>
    </location>
</feature>
<feature type="sequence variant" id="VAR_045484" description="In a sporadic cancer; somatic mutation.">
    <original>N</original>
    <variation>K</variation>
    <location>
        <position position="311"/>
    </location>
</feature>
<feature type="sequence variant" id="VAR_045485" description="In a sporadic cancer; somatic mutation; dbSNP:rs56184981.">
    <original>N</original>
    <variation>S</variation>
    <location>
        <position position="311"/>
    </location>
</feature>
<feature type="sequence variant" id="VAR_045486" description="In sporadic cancers; somatic mutation; dbSNP:rs56184981.">
    <original>N</original>
    <variation>T</variation>
    <location>
        <position position="311"/>
    </location>
</feature>
<feature type="sequence variant" id="VAR_045487" description="In sporadic cancers; somatic mutation.">
    <original>T</original>
    <variation>I</variation>
    <location>
        <position position="312"/>
    </location>
</feature>
<feature type="sequence variant" id="VAR_045488" description="In sporadic cancers; somatic mutation; dbSNP:rs145151284.">
    <original>T</original>
    <variation>S</variation>
    <location>
        <position position="312"/>
    </location>
</feature>
<feature type="sequence variant" id="VAR_045489" description="In a sporadic cancer; somatic mutation.">
    <original>S</original>
    <variation>C</variation>
    <location>
        <position position="313"/>
    </location>
</feature>
<feature type="sequence variant" id="VAR_045490" description="In a sporadic cancer; somatic mutation.">
    <original>S</original>
    <variation>I</variation>
    <location>
        <position position="313"/>
    </location>
</feature>
<feature type="sequence variant" id="VAR_045491" description="In a sporadic cancer; somatic mutation.">
    <original>S</original>
    <variation>N</variation>
    <location>
        <position position="313"/>
    </location>
</feature>
<feature type="sequence variant" id="VAR_045492" description="In a sporadic cancer; somatic mutation; dbSNP:rs1367492395.">
    <original>S</original>
    <variation>R</variation>
    <location>
        <position position="313"/>
    </location>
</feature>
<feature type="sequence variant" id="VAR_045493" description="In a sporadic cancer; somatic mutation; dbSNP:rs751440465.">
    <original>S</original>
    <variation>F</variation>
    <location>
        <position position="314"/>
    </location>
</feature>
<feature type="sequence variant" id="VAR_045494" description="In a sporadic cancer; somatic mutation.">
    <original>S</original>
    <variation>C</variation>
    <location>
        <position position="315"/>
    </location>
</feature>
<feature type="sequence variant" id="VAR_045495" description="In a sporadic cancer; somatic mutation.">
    <original>S</original>
    <variation>F</variation>
    <location>
        <position position="315"/>
    </location>
</feature>
<feature type="sequence variant" id="VAR_045496" description="In a sporadic cancer; somatic mutation.">
    <original>S</original>
    <variation>P</variation>
    <location>
        <position position="315"/>
    </location>
</feature>
<feature type="sequence variant" id="VAR_045497" description="In a sporadic cancer; somatic mutation; dbSNP:rs1555524979.">
    <original>P</original>
    <variation>L</variation>
    <location>
        <position position="316"/>
    </location>
</feature>
<feature type="sequence variant" id="VAR_045498" description="In a sporadic cancer; somatic mutation; dbSNP:rs772773208.">
    <original>P</original>
    <variation>T</variation>
    <location>
        <position position="316"/>
    </location>
</feature>
<feature type="sequence variant" id="VAR_045499" description="In a kidney cancer with no family history; germline mutation and in a sporadic cancer; somatic mutation; dbSNP:rs1060501199.">
    <original>Q</original>
    <variation>H</variation>
    <location>
        <position position="317"/>
    </location>
</feature>
<feature type="sequence variant" id="VAR_045500" description="In sporadic cancers; somatic mutation; dbSNP:rs764735889.">
    <original>Q</original>
    <variation>K</variation>
    <location>
        <position position="317"/>
    </location>
</feature>
<feature type="sequence variant" id="VAR_047210" description="In a sporadic cancer; somatic mutation.">
    <original>Q</original>
    <variation>L</variation>
    <location>
        <position position="317"/>
    </location>
</feature>
<feature type="sequence variant" id="VAR_045501" description="In a sporadic cancer; somatic mutation.">
    <original>Q</original>
    <variation>P</variation>
    <location>
        <position position="317"/>
    </location>
</feature>
<feature type="sequence variant" id="VAR_045502" description="In sporadic cancers; somatic mutation; dbSNP:rs1159579789.">
    <original>Q</original>
    <variation>R</variation>
    <location>
        <position position="317"/>
    </location>
</feature>
<feature type="sequence variant" id="VAR_045503" description="In sporadic cancers; somatic mutation; dbSNP:rs1555524975.">
    <original>P</original>
    <variation>L</variation>
    <location>
        <position position="318"/>
    </location>
</feature>
<feature type="sequence variant" id="VAR_045504" description="In sporadic cancers; somatic mutation.">
    <original>K</original>
    <variation>E</variation>
    <location>
        <position position="319"/>
    </location>
</feature>
<feature type="sequence variant" id="VAR_045505" description="In a sporadic cancer; somatic mutation.">
    <original>K</original>
    <variation>N</variation>
    <location>
        <position position="319"/>
    </location>
</feature>
<feature type="sequence variant" id="VAR_045506" description="In a sporadic cancer; somatic mutation.">
    <original>K</original>
    <variation>R</variation>
    <location>
        <position position="319"/>
    </location>
</feature>
<feature type="sequence variant" id="VAR_045507" description="In sporadic cancers; somatic mutation.">
    <original>K</original>
    <variation>N</variation>
    <location>
        <position position="320"/>
    </location>
</feature>
<feature type="sequence variant" id="VAR_045508" description="In kidney cancer; germline mutation.">
    <original>K</original>
    <variation>E</variation>
    <location>
        <position position="321"/>
    </location>
</feature>
<feature type="sequence variant" id="VAR_045509" description="In a sporadic cancer; somatic mutation.">
    <original>K</original>
    <variation>R</variation>
    <location>
        <position position="321"/>
    </location>
</feature>
<feature type="sequence variant" id="VAR_045510" description="In sporadic cancers; somatic mutation.">
    <original>P</original>
    <variation>L</variation>
    <location>
        <position position="322"/>
    </location>
</feature>
<feature type="sequence variant" id="VAR_045511" description="In sporadic cancers; somatic mutation.">
    <original>P</original>
    <variation>R</variation>
    <location>
        <position position="322"/>
    </location>
</feature>
<feature type="sequence variant" id="VAR_045874" description="In a sporadic cancer; somatic mutation; requires 2 nucleotide substitutions.">
    <original>L</original>
    <variation>G</variation>
    <location>
        <position position="323"/>
    </location>
</feature>
<feature type="sequence variant" id="VAR_045512" description="In a sporadic cancer; somatic mutation.">
    <original>L</original>
    <variation>M</variation>
    <location>
        <position position="323"/>
    </location>
</feature>
<feature type="sequence variant" id="VAR_045513" description="In a sporadic cancer; somatic mutation.">
    <original>L</original>
    <variation>P</variation>
    <location>
        <position position="323"/>
    </location>
</feature>
<feature type="sequence variant" id="VAR_045514" description="In a sporadic cancer; somatic mutation.">
    <original>L</original>
    <variation>R</variation>
    <location>
        <position position="323"/>
    </location>
</feature>
<feature type="sequence variant" id="VAR_047211" description="In a sporadic cancer; somatic mutation; dbSNP:rs1432281680.">
    <original>L</original>
    <variation>V</variation>
    <location>
        <position position="323"/>
    </location>
</feature>
<feature type="sequence variant" id="VAR_045515" description="In sporadic cancers; somatic mutation.">
    <original>D</original>
    <variation>E</variation>
    <location>
        <position position="324"/>
    </location>
</feature>
<feature type="sequence variant" id="VAR_045875" description="In a sporadic cancer; somatic mutation; requires 2 nucleotide substitutions.">
    <original>D</original>
    <variation>S</variation>
    <location>
        <position position="324"/>
    </location>
</feature>
<feature type="sequence variant" id="VAR_045516" description="In a sporadic cancer; somatic mutation.">
    <original>D</original>
    <variation>Y</variation>
    <location>
        <position position="324"/>
    </location>
</feature>
<feature type="sequence variant" id="VAR_045517" description="In a sporadic cancer; somatic mutation.">
    <original>G</original>
    <variation>A</variation>
    <location>
        <position position="325"/>
    </location>
</feature>
<feature type="sequence variant" id="VAR_045518" description="In sporadic cancers; somatic mutation.">
    <original>G</original>
    <variation>E</variation>
    <location>
        <position position="325"/>
    </location>
</feature>
<feature type="sequence variant" id="VAR_006039" description="In LFS; germline mutation; dbSNP:rs121912659." evidence="47">
    <original>G</original>
    <variation>V</variation>
    <location>
        <position position="325"/>
    </location>
</feature>
<feature type="sequence variant" id="VAR_045519" description="In a sporadic cancer; somatic mutation.">
    <original>E</original>
    <variation>G</variation>
    <location>
        <position position="326"/>
    </location>
</feature>
<feature type="sequence variant" id="VAR_045520" description="In a sporadic cancer; somatic mutation.">
    <original>Y</original>
    <variation>H</variation>
    <location>
        <position position="327"/>
    </location>
</feature>
<feature type="sequence variant" id="VAR_045521" description="In a sporadic cancer; somatic mutation.">
    <original>Y</original>
    <variation>S</variation>
    <location>
        <position position="327"/>
    </location>
</feature>
<feature type="sequence variant" id="VAR_045522" description="In a sporadic cancer; somatic mutation.">
    <original>F</original>
    <variation>L</variation>
    <location>
        <position position="328"/>
    </location>
</feature>
<feature type="sequence variant" id="VAR_045523" description="In sporadic cancers; somatic mutation.">
    <original>F</original>
    <variation>S</variation>
    <location>
        <position position="328"/>
    </location>
</feature>
<feature type="sequence variant" id="VAR_045524" description="In a sporadic cancer; somatic mutation.">
    <original>F</original>
    <variation>V</variation>
    <location>
        <position position="328"/>
    </location>
</feature>
<feature type="sequence variant" id="VAR_045525" description="In a sporadic cancer; somatic mutation; dbSNP:rs969930693.">
    <original>T</original>
    <variation>I</variation>
    <location>
        <position position="329"/>
    </location>
</feature>
<feature type="sequence variant" id="VAR_045526" description="In a sporadic cancer; somatic mutation.">
    <original>T</original>
    <variation>S</variation>
    <location>
        <position position="329"/>
    </location>
</feature>
<feature type="sequence variant" id="VAR_045527" description="In sporadic cancers; somatic mutation.">
    <original>L</original>
    <variation>H</variation>
    <location>
        <position position="330"/>
    </location>
</feature>
<feature type="sequence variant" id="VAR_047212" description="In a sporadic cancer; somatic mutation.">
    <original>L</original>
    <variation>P</variation>
    <location>
        <position position="330"/>
    </location>
</feature>
<feature type="sequence variant" id="VAR_045528" description="In sporadic cancers; somatic mutation.">
    <original>L</original>
    <variation>R</variation>
    <location>
        <position position="330"/>
    </location>
</feature>
<feature type="sequence variant" id="VAR_045529" description="In sporadic cancers; somatic mutation; dbSNP:rs11575996.">
    <original>Q</original>
    <variation>H</variation>
    <location>
        <position position="331"/>
    </location>
</feature>
<feature type="sequence variant" id="VAR_045530" description="In sporadic cancers; somatic mutation.">
    <original>Q</original>
    <variation>P</variation>
    <location>
        <position position="331"/>
    </location>
</feature>
<feature type="sequence variant" id="VAR_045531" description="In sporadic cancers; somatic mutation; dbSNP:rs1064795056.">
    <original>Q</original>
    <variation>R</variation>
    <location>
        <position position="331"/>
    </location>
</feature>
<feature type="sequence variant" id="VAR_045532" description="In a sporadic cancer; somatic mutation.">
    <original>I</original>
    <variation>V</variation>
    <location>
        <position position="332"/>
    </location>
</feature>
<feature type="sequence variant" id="VAR_006040" description="In sporadic cancers; somatic mutation.">
    <original>G</original>
    <variation>V</variation>
    <location>
        <position position="334"/>
    </location>
</feature>
<feature type="sequence variant" id="VAR_045533" description="In a sporadic cancer; somatic mutation; dbSNP:rs730882028.">
    <original>G</original>
    <variation>W</variation>
    <location>
        <position position="334"/>
    </location>
</feature>
<feature type="sequence variant" id="VAR_045534" description="In a sporadic cancer; somatic mutation.">
    <original>R</original>
    <variation>G</variation>
    <location>
        <position position="335"/>
    </location>
</feature>
<feature type="sequence variant" id="VAR_045535" description="In a sporadic cancer; somatic mutation; dbSNP:rs771939956.">
    <original>R</original>
    <variation>H</variation>
    <location>
        <position position="335"/>
    </location>
</feature>
<feature type="sequence variant" id="VAR_045536" description="In a sporadic cancer; somatic mutation.">
    <original>R</original>
    <variation>L</variation>
    <location>
        <position position="335"/>
    </location>
</feature>
<feature type="sequence variant" id="VAR_006041" description="In LFS; germline mutation and in sporadic cancers; somatic mutation; impaired ability to tetramerize and undergo liquid-liquid phase separation; dbSNP:rs587782529." evidence="168 183">
    <original>R</original>
    <variation>C</variation>
    <location>
        <position position="337"/>
    </location>
</feature>
<feature type="sequence variant" id="VAR_035016" description="In LFS; germline mutation and in sporadic cancers; somatic mutation; impaired ability to tetramerize and undergo liquid-liquid phase separation; dbSNP:rs121912664." evidence="19 168">
    <original>R</original>
    <variation>H</variation>
    <location>
        <position position="337"/>
    </location>
</feature>
<feature type="sequence variant" id="VAR_045537" description="In sporadic cancers; somatic mutation; dbSNP:rs121912664.">
    <original>R</original>
    <variation>L</variation>
    <location>
        <position position="337"/>
    </location>
</feature>
<feature type="sequence variant" id="VAR_045538" description="In sporadic cancers; somatic mutation; impaired ability to tetramerize and undergo liquid-liquid phase separation; dbSNP:rs121912664." evidence="168">
    <original>R</original>
    <variation>P</variation>
    <location>
        <position position="337"/>
    </location>
</feature>
<feature type="sequence variant" id="VAR_045539" description="In a sporadic cancer; somatic mutation.">
    <original>F</original>
    <variation>I</variation>
    <location>
        <position position="338"/>
    </location>
</feature>
<feature type="sequence variant" id="VAR_045540" description="In a sporadic cancer; somatic mutation; dbSNP:rs150293825.">
    <original>F</original>
    <variation>L</variation>
    <location>
        <position position="338"/>
    </location>
</feature>
<feature type="sequence variant" id="VAR_022316" description="In a sporadic cancer; somatic mutation; dbSNP:rs17882252." evidence="185">
    <original>E</original>
    <variation>K</variation>
    <location>
        <position position="339"/>
    </location>
</feature>
<feature type="sequence variant" id="VAR_045541" description="In a sporadic cancer; somatic mutation; dbSNP:rs17882252.">
    <original>E</original>
    <variation>Q</variation>
    <location>
        <position position="339"/>
    </location>
</feature>
<feature type="sequence variant" id="VAR_045542" description="In sporadic cancers; somatic mutation.">
    <original>F</original>
    <variation>C</variation>
    <location>
        <position position="341"/>
    </location>
</feature>
<feature type="sequence variant" id="VAR_045543" description="In a sporadic cancer; somatic mutation.">
    <original>R</original>
    <variation>L</variation>
    <location>
        <position position="342"/>
    </location>
</feature>
<feature type="sequence variant" id="VAR_045544" description="In sporadic cancers; somatic mutation; dbSNP:rs375338359.">
    <original>R</original>
    <variation>P</variation>
    <location>
        <position position="342"/>
    </location>
</feature>
<feature type="sequence variant" id="VAR_047213" description="In sporadic cancers; somatic mutation; dbSNP:rs375338359.">
    <original>R</original>
    <variation>Q</variation>
    <location>
        <position position="342"/>
    </location>
</feature>
<feature type="sequence variant" id="VAR_045545" description="In sporadic cancers; somatic mutation.">
    <original>E</original>
    <variation>G</variation>
    <location>
        <position position="343"/>
    </location>
</feature>
<feature type="sequence variant" id="VAR_045546" description="In LFS; germline mutation and in a sporadic cancer; somatic mutation; impaired ability to tetramerize and undergo liquid-liquid phase separation; dbSNP:rs121912662." evidence="168">
    <original>L</original>
    <variation>P</variation>
    <location>
        <position position="344"/>
    </location>
</feature>
<feature type="sequence variant" id="VAR_045547" description="In a sporadic cancer; somatic mutation.">
    <original>L</original>
    <variation>R</variation>
    <location>
        <position position="344"/>
    </location>
</feature>
<feature type="sequence variant" id="VAR_045548" description="In a sporadic cancer; somatic mutation.">
    <original>E</original>
    <variation>A</variation>
    <location>
        <position position="346"/>
    </location>
</feature>
<feature type="sequence variant" id="VAR_045549" description="In a sporadic cancer; somatic mutation.">
    <original>A</original>
    <variation>G</variation>
    <location>
        <position position="347"/>
    </location>
</feature>
<feature type="sequence variant" id="VAR_045550" description="In sporadic cancers; somatic mutation.">
    <original>A</original>
    <variation>T</variation>
    <location>
        <position position="347"/>
    </location>
</feature>
<feature type="sequence variant" id="VAR_045551" description="In a sporadic cancer; somatic mutation.">
    <original>L</original>
    <variation>F</variation>
    <location>
        <position position="348"/>
    </location>
</feature>
<feature type="sequence variant" id="VAR_045552" description="In a sporadic cancer; somatic mutation.">
    <original>L</original>
    <variation>S</variation>
    <location>
        <position position="348"/>
    </location>
</feature>
<feature type="sequence variant" id="VAR_045553" description="In a sporadic cancer; somatic mutation.">
    <original>E</original>
    <variation>D</variation>
    <location>
        <position position="349"/>
    </location>
</feature>
<feature type="sequence variant" id="VAR_045554" description="In a sporadic cancer; somatic mutation.">
    <original>D</original>
    <variation>H</variation>
    <location>
        <position position="352"/>
    </location>
</feature>
<feature type="sequence variant" id="VAR_045555" description="In a sporadic cancer; somatic mutation.">
    <original>A</original>
    <variation>T</variation>
    <location>
        <position position="353"/>
    </location>
</feature>
<feature type="sequence variant" id="VAR_045556" description="In a sporadic cancer; somatic mutation.">
    <original>Q</original>
    <variation>E</variation>
    <location>
        <position position="354"/>
    </location>
</feature>
<feature type="sequence variant" id="VAR_045557" description="In a sporadic cancer; somatic mutation; dbSNP:rs755394212.">
    <original>Q</original>
    <variation>K</variation>
    <location>
        <position position="354"/>
    </location>
</feature>
<feature type="sequence variant" id="VAR_047214" description="In sporadic cancers; somatic mutation; dbSNP:rs752142489.">
    <original>Q</original>
    <variation>R</variation>
    <location>
        <position position="354"/>
    </location>
</feature>
<feature type="sequence variant" id="VAR_045558" description="In a sporadic cancer; somatic mutation.">
    <original>G</original>
    <variation>A</variation>
    <location>
        <position position="356"/>
    </location>
</feature>
<feature type="sequence variant" id="VAR_045559" description="In a sporadic cancer; somatic mutation.">
    <original>G</original>
    <variation>W</variation>
    <location>
        <position position="356"/>
    </location>
</feature>
<feature type="sequence variant" id="VAR_045560" description="In a sporadic cancer; somatic mutation.">
    <original>E</original>
    <variation>D</variation>
    <location>
        <position position="358"/>
    </location>
</feature>
<feature type="sequence variant" id="VAR_045561" description="In a sporadic cancer; somatic mutation; dbSNP:rs587782237.">
    <original>E</original>
    <variation>K</variation>
    <location>
        <position position="358"/>
    </location>
</feature>
<feature type="sequence variant" id="VAR_045562" description="In dbSNP:rs35993958.">
    <original>G</original>
    <variation>A</variation>
    <location>
        <position position="360"/>
    </location>
</feature>
<feature type="sequence variant" id="VAR_045563" description="In a sporadic cancer; somatic mutation; dbSNP:rs35993958.">
    <original>G</original>
    <variation>V</variation>
    <location>
        <position position="360"/>
    </location>
</feature>
<feature type="sequence variant" id="VAR_045564" description="In a sporadic cancer; somatic mutation; dbSNP:rs876660285.">
    <original>R</original>
    <variation>K</variation>
    <location>
        <position position="363"/>
    </location>
</feature>
<feature type="sequence variant" id="VAR_045565" description="In a sporadic cancer; somatic mutation.">
    <original>A</original>
    <variation>P</variation>
    <location>
        <position position="364"/>
    </location>
</feature>
<feature type="sequence variant" id="VAR_045566" description="In a sporadic cancer; somatic mutation.">
    <original>A</original>
    <variation>T</variation>
    <location>
        <position position="364"/>
    </location>
</feature>
<feature type="sequence variant" id="VAR_045567" description="In a sporadic cancer; somatic mutation.">
    <original>A</original>
    <variation>V</variation>
    <location>
        <position position="364"/>
    </location>
</feature>
<feature type="sequence variant" id="VAR_047215" description="In a sporadic cancer; somatic mutation.">
    <original>H</original>
    <variation>R</variation>
    <location>
        <position position="365"/>
    </location>
</feature>
<feature type="sequence variant" id="VAR_045568" description="In a familial cancer not matching LFS; germline mutation and in a sporadic cancer; somatic mutation; dbSNP:rs267605075.">
    <original>H</original>
    <variation>Y</variation>
    <location>
        <position position="365"/>
    </location>
</feature>
<feature type="sequence variant" id="VAR_022317" description="In a familial cancer not matching LFS; germline mutation and in sporadic cancers; somatic mutation; dbSNP:rs17881470." evidence="185">
    <original>S</original>
    <variation>A</variation>
    <location>
        <position position="366"/>
    </location>
</feature>
<feature type="sequence variant" id="VAR_045569" description="In a sporadic cancer; somatic mutation.">
    <original>K</original>
    <variation>Q</variation>
    <location>
        <position position="370"/>
    </location>
</feature>
<feature type="sequence variant" id="VAR_045570" description="In a sporadic cancer; somatic mutation.">
    <original>S</original>
    <variation>A</variation>
    <location>
        <position position="376"/>
    </location>
</feature>
<feature type="sequence variant" id="VAR_045571" description="In a sporadic cancer; somatic mutation.">
    <original>S</original>
    <variation>T</variation>
    <location>
        <position position="376"/>
    </location>
</feature>
<feature type="sequence variant" id="VAR_045572" description="In sporadic cancers; somatic mutation; dbSNP:rs863224682.">
    <original>R</original>
    <variation>H</variation>
    <location>
        <position position="379"/>
    </location>
</feature>
<feature type="sequence variant" id="VAR_045573" description="In a sporadic cancer; somatic mutation; dbSNP:rs1555524094.">
    <original>F</original>
    <variation>L</variation>
    <location>
        <position position="385"/>
    </location>
</feature>
<feature type="sequence variant" id="VAR_045574" description="In a sporadic cancer; somatic mutation; dbSNP:rs587783064.">
    <original>G</original>
    <variation>W</variation>
    <location>
        <position position="389"/>
    </location>
</feature>
<feature type="sequence variant" id="VAR_045575" description="In a sporadic cancer; somatic mutation.">
    <original>S</original>
    <variation>L</variation>
    <location>
        <position position="392"/>
    </location>
</feature>
<feature type="mutagenesis site" description="Loss of interaction with PPP2R5C, PPP2CA AND PPP2R1A." evidence="89">
    <original>S</original>
    <variation>A</variation>
    <location>
        <position position="15"/>
    </location>
</feature>
<feature type="mutagenesis site" description="No effect on interaction with MDM2 and increase in protein levels after DNA damage." evidence="7">
    <original>T</original>
    <variation>A</variation>
    <location>
        <position position="18"/>
    </location>
</feature>
<feature type="mutagenesis site" description="Abolishes phosphorylation site. Abolishes increase in protein levels after DNA damage." evidence="7">
    <original>S</original>
    <variation>A</variation>
    <location>
        <position position="20"/>
    </location>
</feature>
<feature type="mutagenesis site" description="Constitutively increased TP53 protein levels." evidence="7">
    <original>S</original>
    <variation>D</variation>
    <location>
        <position position="20"/>
    </location>
</feature>
<feature type="mutagenesis site" description="Loss of interaction with MDM2, leading to constitutively increased TP53 protein levels." evidence="7">
    <original>LW</original>
    <variation>QS</variation>
    <location>
        <begin position="22"/>
        <end position="23"/>
    </location>
</feature>
<feature type="mutagenesis site" description="Abolishes ubiquitination by MUL1." evidence="129">
    <original>K</original>
    <variation>R</variation>
    <location>
        <position position="24"/>
    </location>
</feature>
<feature type="mutagenesis site" description="Abolishes phosphorylation by MAPKAPK5." evidence="77">
    <original>S</original>
    <variation>D</variation>
    <location>
        <position position="37"/>
    </location>
</feature>
<feature type="mutagenesis site" description="Abolishes phosphorylation by DYRK2 and HIPK2 and acetylation of K-382 by CREBBP." evidence="23 53 80">
    <original>S</original>
    <variation>A</variation>
    <location>
        <position position="46"/>
    </location>
</feature>
<feature type="mutagenesis site" description="Alters interaction with WWOX." evidence="23 53 80">
    <location>
        <position position="46"/>
    </location>
</feature>
<feature type="mutagenesis site" description="Blocks phosphorylation by TAF1." evidence="38">
    <original>T</original>
    <variation>A</variation>
    <location>
        <position position="55"/>
    </location>
</feature>
<feature type="mutagenesis site" description="Abolishes strongly phosphorylation." evidence="125">
    <original>S</original>
    <variation>A</variation>
    <location>
        <position position="183"/>
    </location>
</feature>
<feature type="mutagenesis site" description="Inhibits slightly its transcriptional activity." evidence="125">
    <original>S</original>
    <variation>E</variation>
    <location>
        <position position="183"/>
    </location>
</feature>
<feature type="mutagenesis site" description="Does not induce SNAI1 degradation." evidence="121">
    <original>R</original>
    <variation>S</variation>
    <location>
        <position position="248"/>
    </location>
</feature>
<feature type="mutagenesis site" description="Abolishes phosphorylation." evidence="125">
    <original>S</original>
    <variation>A</variation>
    <location>
        <position position="269"/>
    </location>
</feature>
<feature type="mutagenesis site" description="Inhibits strongly its transcriptional activity." evidence="125">
    <original>S</original>
    <variation>E</variation>
    <location>
        <position position="269"/>
    </location>
</feature>
<feature type="mutagenesis site" description="Inhibits strongly its transcriptional activity." evidence="125">
    <original>T</original>
    <variation>E</variation>
    <location>
        <position position="284"/>
    </location>
</feature>
<feature type="mutagenesis site" description="Abolishes polyubiquitination by MKRN1." evidence="104">
    <original>KK</original>
    <variation>RR</variation>
    <location>
        <begin position="291"/>
        <end position="292"/>
    </location>
</feature>
<feature type="mutagenesis site" description="Loss of nuclear localization; when associated with A-320 and A-321." evidence="128">
    <original>K</original>
    <variation>A</variation>
    <location>
        <position position="319"/>
    </location>
</feature>
<feature type="mutagenesis site" description="Loss of nuclear localization; when associated with A-319 and A-321." evidence="128">
    <original>K</original>
    <variation>A</variation>
    <location>
        <position position="320"/>
    </location>
</feature>
<feature type="mutagenesis site" description="Loss of nuclear localization; when associated with A-319 and A-320." evidence="128">
    <original>K</original>
    <variation>A</variation>
    <location>
        <position position="321"/>
    </location>
</feature>
<feature type="mutagenesis site" description="Reduced methylation by PRMT5. Reduced nuclear localization. Decreased binding to promoters of target genes. Reduced transcriptional activity. Decrease in cell cycle arrest." evidence="98">
    <original>RGRER</original>
    <variation>KGKEK</variation>
    <location>
        <begin position="333"/>
        <end position="337"/>
    </location>
</feature>
<feature type="mutagenesis site" description="Abolishes binding to USP7." evidence="58">
    <original>P</original>
    <variation>D</variation>
    <location>
        <position position="359"/>
    </location>
</feature>
<feature type="mutagenesis site" description="Abolishes binding to USP7." evidence="58">
    <original>G</original>
    <variation>E</variation>
    <location>
        <position position="361"/>
    </location>
</feature>
<feature type="mutagenesis site" description="Abolishes binding to USP7." evidence="58">
    <original>S</original>
    <variation>A</variation>
    <location>
        <position position="362"/>
    </location>
</feature>
<feature type="mutagenesis site" description="Induces a decrease in methylation by SMYD2." evidence="70">
    <original>K</original>
    <variation>R</variation>
    <location>
        <position position="370"/>
    </location>
</feature>
<feature type="mutagenesis site" description="Induces a decrease in protein stabilization." evidence="46">
    <original>K</original>
    <variation>R</variation>
    <location>
        <position position="372"/>
    </location>
</feature>
<feature type="mutagenesis site" description="Abolishes dimethylation by EHMT1 and EHMT2." evidence="115">
    <original>K</original>
    <variation>R</variation>
    <location>
        <position position="373"/>
    </location>
</feature>
<feature type="mutagenesis site" description="Mimics acetylation, leading to increased stability." evidence="157">
    <original>K</original>
    <variation>Q</variation>
    <location>
        <position position="381"/>
    </location>
</feature>
<feature type="mutagenesis site" description="Decreased acetylation." evidence="157">
    <original>K</original>
    <variation>R</variation>
    <location>
        <position position="381"/>
    </location>
</feature>
<feature type="mutagenesis site" description="Abolishes acetylation by CREBBP." evidence="12 23 84 124">
    <original>K</original>
    <variation>A</variation>
    <location>
        <position position="382"/>
    </location>
</feature>
<feature type="mutagenesis site" description="Abolishes monomethylation by KMT5A." evidence="12 23 84 124">
    <original>K</original>
    <variation>R</variation>
    <location>
        <position position="382"/>
    </location>
</feature>
<feature type="mutagenesis site" description="Abolishes S-315 phosphorylation by CDK2/cyclin A." evidence="12">
    <original>L</original>
    <variation>A</variation>
    <location>
        <position position="383"/>
    </location>
</feature>
<feature type="mutagenesis site" description="Reduced SUMO1 conjugation." evidence="12 16">
    <original>F</original>
    <variation>A</variation>
    <location>
        <position position="385"/>
    </location>
</feature>
<feature type="mutagenesis site" description="Abolishes SUMO1 conjugation, in vitro and in vivo." evidence="16 190">
    <original>K</original>
    <variation>A</variation>
    <location>
        <position position="386"/>
    </location>
</feature>
<feature type="mutagenesis site" description="No effect SUMO1 conjugation." evidence="16">
    <original>T</original>
    <variation>A</variation>
    <location>
        <position position="387"/>
    </location>
</feature>
<feature type="mutagenesis site" description="Abolishes SUMO1 conjugation." evidence="16">
    <original>E</original>
    <variation>A</variation>
    <location>
        <position position="388"/>
    </location>
</feature>
<feature type="mutagenesis site" description="Mimics phosphorylation; promotes ability to undergo liquid-liquid phase separation." evidence="167">
    <original>S</original>
    <variation>D</variation>
    <location>
        <position position="392"/>
    </location>
</feature>
<feature type="mutagenesis site" description="Abolished ability to undergo liquid-liquid phase separation." evidence="161">
    <original>S</original>
    <variation>E</variation>
    <location>
        <position position="392"/>
    </location>
</feature>
<feature type="helix" evidence="208">
    <location>
        <begin position="3"/>
        <end position="6"/>
    </location>
</feature>
<feature type="turn" evidence="208">
    <location>
        <begin position="8"/>
        <end position="10"/>
    </location>
</feature>
<feature type="helix" evidence="213">
    <location>
        <begin position="19"/>
        <end position="29"/>
    </location>
</feature>
<feature type="helix" evidence="209">
    <location>
        <begin position="30"/>
        <end position="32"/>
    </location>
</feature>
<feature type="strand" evidence="201">
    <location>
        <begin position="33"/>
        <end position="35"/>
    </location>
</feature>
<feature type="helix" evidence="199">
    <location>
        <begin position="36"/>
        <end position="38"/>
    </location>
</feature>
<feature type="helix" evidence="199">
    <location>
        <begin position="41"/>
        <end position="44"/>
    </location>
</feature>
<feature type="helix" evidence="199">
    <location>
        <begin position="47"/>
        <end position="55"/>
    </location>
</feature>
<feature type="strand" evidence="212">
    <location>
        <begin position="95"/>
        <end position="97"/>
    </location>
</feature>
<feature type="turn" evidence="202">
    <location>
        <begin position="105"/>
        <end position="108"/>
    </location>
</feature>
<feature type="strand" evidence="202">
    <location>
        <begin position="110"/>
        <end position="112"/>
    </location>
</feature>
<feature type="strand" evidence="205">
    <location>
        <begin position="118"/>
        <end position="120"/>
    </location>
</feature>
<feature type="turn" evidence="205">
    <location>
        <begin position="121"/>
        <end position="123"/>
    </location>
</feature>
<feature type="strand" evidence="202">
    <location>
        <begin position="124"/>
        <end position="127"/>
    </location>
</feature>
<feature type="turn" evidence="202">
    <location>
        <begin position="128"/>
        <end position="131"/>
    </location>
</feature>
<feature type="strand" evidence="202">
    <location>
        <begin position="132"/>
        <end position="135"/>
    </location>
</feature>
<feature type="strand" evidence="202">
    <location>
        <begin position="141"/>
        <end position="146"/>
    </location>
</feature>
<feature type="strand" evidence="210">
    <location>
        <begin position="148"/>
        <end position="150"/>
    </location>
</feature>
<feature type="strand" evidence="202">
    <location>
        <begin position="156"/>
        <end position="165"/>
    </location>
</feature>
<feature type="helix" evidence="202">
    <location>
        <begin position="166"/>
        <end position="168"/>
    </location>
</feature>
<feature type="helix" evidence="202">
    <location>
        <begin position="177"/>
        <end position="180"/>
    </location>
</feature>
<feature type="strand" evidence="207">
    <location>
        <begin position="181"/>
        <end position="183"/>
    </location>
</feature>
<feature type="strand" evidence="211">
    <location>
        <begin position="187"/>
        <end position="189"/>
    </location>
</feature>
<feature type="strand" evidence="202">
    <location>
        <begin position="194"/>
        <end position="199"/>
    </location>
</feature>
<feature type="strand" evidence="202">
    <location>
        <begin position="204"/>
        <end position="207"/>
    </location>
</feature>
<feature type="turn" evidence="202">
    <location>
        <begin position="209"/>
        <end position="211"/>
    </location>
</feature>
<feature type="strand" evidence="202">
    <location>
        <begin position="214"/>
        <end position="219"/>
    </location>
</feature>
<feature type="turn" evidence="200">
    <location>
        <begin position="225"/>
        <end position="227"/>
    </location>
</feature>
<feature type="strand" evidence="202">
    <location>
        <begin position="228"/>
        <end position="236"/>
    </location>
</feature>
<feature type="helix" evidence="203">
    <location>
        <begin position="240"/>
        <end position="242"/>
    </location>
</feature>
<feature type="turn" evidence="202">
    <location>
        <begin position="243"/>
        <end position="248"/>
    </location>
</feature>
<feature type="strand" evidence="202">
    <location>
        <begin position="251"/>
        <end position="258"/>
    </location>
</feature>
<feature type="strand" evidence="198">
    <location>
        <begin position="260"/>
        <end position="262"/>
    </location>
</feature>
<feature type="strand" evidence="202">
    <location>
        <begin position="264"/>
        <end position="274"/>
    </location>
</feature>
<feature type="helix" evidence="202">
    <location>
        <begin position="278"/>
        <end position="287"/>
    </location>
</feature>
<feature type="helix" evidence="206">
    <location>
        <begin position="288"/>
        <end position="290"/>
    </location>
</feature>
<feature type="helix" evidence="204">
    <location>
        <begin position="322"/>
        <end position="324"/>
    </location>
</feature>
<feature type="strand" evidence="204">
    <location>
        <begin position="327"/>
        <end position="334"/>
    </location>
</feature>
<feature type="helix" evidence="196">
    <location>
        <begin position="335"/>
        <end position="354"/>
    </location>
</feature>
<feature type="helix" evidence="197">
    <location>
        <begin position="375"/>
        <end position="380"/>
    </location>
</feature>
<comment type="function">
    <text evidence="15 26 29 42 43 74 78 80 105 123 125 137 142 144 167 169 170 184">Multifunctional transcription factor that induces cell cycle arrest, DNA repair or apoptosis upon binding to its target DNA sequence (PubMed:11025664, PubMed:12524540, PubMed:12810724, PubMed:15186775, PubMed:15340061, PubMed:17317671, PubMed:17349958, PubMed:19556538, PubMed:20673990, PubMed:20959462, PubMed:22726440, PubMed:24051492, PubMed:24652652, PubMed:35618207, PubMed:36634798, PubMed:38653238, PubMed:9840937). Acts as a tumor suppressor in many tumor types; induces growth arrest or apoptosis depending on the physiological circumstances and cell type (PubMed:11025664, PubMed:12524540, PubMed:12810724, PubMed:15186775, PubMed:15340061, PubMed:17189187, PubMed:17317671, PubMed:17349958, PubMed:19556538, PubMed:20673990, PubMed:20959462, PubMed:22726440, PubMed:24051492, PubMed:24652652, PubMed:38653238, PubMed:9840937). Negatively regulates cell division by controlling expression of a set of genes required for this process (PubMed:11025664, PubMed:12524540, PubMed:12810724, PubMed:15186775, PubMed:15340061, PubMed:17317671, PubMed:17349958, PubMed:19556538, PubMed:20673990, PubMed:20959462, PubMed:22726440, PubMed:24051492, PubMed:24652652, PubMed:9840937). One of the activated genes is an inhibitor of cyclin-dependent kinases. Apoptosis induction seems to be mediated either by stimulation of BAX and FAS antigen expression, or by repression of Bcl-2 expression (PubMed:12524540, PubMed:17189187). Its pro-apoptotic activity is activated via its interaction with PPP1R13B/ASPP1 or TP53BP2/ASPP2 (PubMed:12524540). However, this activity is inhibited when the interaction with PPP1R13B/ASPP1 or TP53BP2/ASPP2 is displaced by PPP1R13L/iASPP (PubMed:12524540). In cooperation with mitochondrial PPIF is involved in activating oxidative stress-induced necrosis; the function is largely independent of transcription. Induces the transcription of long intergenic non-coding RNA p21 (lincRNA-p21) and lincRNA-Mkln1. LincRNA-p21 participates in TP53-dependent transcriptional repression leading to apoptosis and seems to have an effect on cell-cycle regulation. Implicated in Notch signaling cross-over. Prevents CDK7 kinase activity when associated to CAK complex in response to DNA damage, thus stopping cell cycle progression. Isoform 2 enhances the transactivation activity of isoform 1 from some but not all TP53-inducible promoters. Isoform 4 suppresses transactivation activity and impairs growth suppression mediated by isoform 1. Isoform 7 inhibits isoform 1-mediated apoptosis. Regulates the circadian clock by repressing CLOCK-BMAL1-mediated transcriptional activation of PER2 (PubMed:24051492).</text>
</comment>
<comment type="cofactor">
    <cofactor evidence="33 62 67 94 103 117 120">
        <name>Zn(2+)</name>
        <dbReference type="ChEBI" id="CHEBI:29105"/>
    </cofactor>
    <text evidence="33 62 67 94 103 117 120">Binds 1 zinc ion per subunit.</text>
</comment>
<comment type="subunit">
    <text evidence="2 3 26 28 29 30 33 37 38 40 41 42 48 50 53 55 56 57 58 60 62 63 67 69 71 72 73 76 78 79 83 85 87 88 89 93 94 96 97 98 102 103 104 105 108 110 113 116 117 119 120 121 122 124 125 126 132 133 134 137 139 140 141 143 145 146 148 151 152 155 158 162 163 164 166 178 179 184">Forms homodimers and homotetramers (PubMed:19011621). Binds DNA as a homotetramer (PubMed:36108750). Interacts with AXIN1. Probably part of a complex consisting of TP53, HIPK2 and AXIN1 (By similarity). Interacts with histone acetyltransferases EP300 and methyltransferases HRMT1L2 and CARM1, and recruits them to promoters. Interacts (via C-terminus) with TAF1; when TAF1 is part of the TFIID complex. Interacts with ING4; this interaction may be indirect. Found in a complex with CABLES1 and TP73. Interacts with HIPK1, HIPK2, and TP53INP1. Interacts with WWOX. May interact with HCV core protein. Interacts with USP7 and SYVN1. Interacts with HSP90AB1. Interacts with CHD8; leading to recruit histone H1 and prevent transactivation activity (By similarity). Interacts with ARMC10, CDKN2AIP, NUAK1, STK11/LKB1, UHRF2 and E4F1. Interacts with YWHAZ; the interaction enhances TP53 transcriptional activity. Phosphorylation of YWHAZ on 'Ser-58' inhibits this interaction. Interacts (via DNA-binding domain) with MAML1 (via N-terminus). Interacts with MKRN1. Interacts with PML (via C-terminus). Interacts with MDM2; leading to ubiquitination and proteasomal degradation of TP53. Directly interacts with FBXO42; leading to ubiquitination and degradation of TP53. Interacts (phosphorylated at Ser-15 by ATM) with the phosphatase PP2A-PPP2R5C holoenzyme; regulates stress-induced TP53-dependent inhibition of cell proliferation. Interacts with PPP2R2A. Interacts with AURKA, DAXX, BRD7 and TRIM24. Interacts (when monomethylated at Lys-382) with L3MBTL1. Isoform 1 interacts with isoform 2 and with isoform 4. Interacts with GRK5. Binds to the CAK complex (CDK7, cyclin H and MAT1) in response to DNA damage. Interacts with CDK5 in neurons. Interacts with AURKB, SETD2, UHRF2 and NOC2L. Interacts (via N-terminus) with PTK2/FAK1; this promotes ubiquitination by MDM2. Interacts with PTK2B/PYK2; this promotes ubiquitination by MDM2. Interacts with PRKCG. Interacts with PPIF; the association implicates preferentially tetrameric TP53, is induced by oxidative stress and is impaired by cyclosporin A (CsA). Interacts with SNAI1; the interaction induces SNAI1 degradation via MDM2-mediated ubiquitination and inhibits SNAI1-induced cell invasion. Interacts with UBC9. Interacts with ZNF385B; the interaction is direct. Interacts (via DNA-binding domain) with ZNF385A; the interaction is direct and enhances p53/TP53 transactivation functions on cell-cycle arrest target genes, resulting in growth arrest. Interacts with ANKRD2. Interacts with RFFL and RNF34; involved in p53/TP53 ubiquitination. Interacts with MTA1 and COP1. Interacts with CCAR2 (via N-terminus). Interacts with MORC3 (PubMed:17332504). Interacts (via C-terminus) with POU4F2 isoform 1 (via C-terminus) (PubMed:17145718). Interacts (via oligomerization region) with NOP53; the interaction is direct and may prevent the MDM2-mediated proteasomal degradation of TP53 (PubMed:22522597). Interacts with AFG1L; mediates mitochondrial translocation of TP53 (PubMed:27323408). Interacts with UBD (PubMed:25422469). Interacts with TAF6 isoform 1 and isoform 4 (PubMed:20096117). Interacts with C10orf90/FATS; the interaction inhibits binding of TP53 and MDM2 (By similarity). Interacts with NUPR1; interaction is stress-dependent (PubMed:18690848). Forms a complex with EP300 and NUPR1; this complex binds CDKN1A promoter leading to transcriptional induction of CDKN1A (PubMed:18690848). Interacts with PRMT5 in response to DNA damage; the interaction is TTC5/STRAP dependent (PubMed:19011621). Interacts with PPP1R13L (via SH3 domain and ANK repeats); the interaction inhibits pro-apoptotic activity of p53/TP53 (PubMed:12524540). Interacts with PPP1R13B/ASPP1 and TP53BP2/ASPP2; the interactions promotes pro-apoptotic activity (PubMed:12524540). When phosphorylated at Ser-15, interacts with DDX3X and gamma-tubulin (PubMed:28842590). Interacts with KAT7/HBO1; leading to inhibit histone acetyltransferase activity of KAT7/HBO1 (PubMed:17954561). Interacts (via N-terminus) with E3 ubiquitin-protein ligase MUL1; the interaction results in ubiquitination of cytoplasmic TP53 at Lys-24 and subsequent proteasomal degradation (PubMed:21597459). Interacts with S100A4; this interaction promotes TP53 degradation (PubMed:23752197, PubMed:32442400). Interacts with BANP (By similarity). Interacts with TTC5/STRAP; the interaction may result in increased mitochondrial-dependent apoptosis (PubMed:25168243). Interacts with NQO1; this interaction is NADH-dependent, stabilizes TP53 in response to oxidative stress and protects it from ubiquitin-independent degradation by the 20S proteasome (PubMed:15687255). Interacts with DAZAP2 at TP53 target gene promoters; the interaction is triggered by DNA damage and leads to modulation of the expression of a subset of TP53 target genes, reducing DNA damage-induced cell death by limiting the expression of cell death-mediating TP53 target genes (PubMed:33591310). Interacts (via N-terminus) with ZNF768 (via zinc-finger domains); interaction might be facilitated by TP53 oligomerization state (PubMed:34404770). Forms a ternary complex with ALDOB and G6PD; this interaction is direct. ALDOB stabilizes the complex inhibiting G6PD activity and keeping oxidative pentose phosphate metabolism in check. Interacts with MORN3; the interactions mediate post-transcriptional modifications of TP53 by MDM2 and SIRT1 (PubMed:29681526). Interacts with HSPA9/MOT-2; the interaction promotes the degradation of TP53 (PubMed:24625977). Interacts with FBXO22; this interaction promotes TP53 proteasomal degradation (PubMed:26868148).</text>
</comment>
<comment type="subunit">
    <text evidence="130">(Microbial infection) Interacts with cancer-associated/HPV E6 viral proteins leading to ubiquitination and degradation of TP53 giving a possible model for cell growth regulation. This complex formation requires an additional factor, E6-AP, which stably associates with TP53 in the presence of E6.</text>
</comment>
<comment type="subunit">
    <text evidence="106">(Microbial infection) Interacts with human cytomegalovirus/HHV-5 protein UL123.</text>
</comment>
<comment type="subunit">
    <text evidence="149">(Microbial infection) Interacts (via N-terminus) with human adenovirus 5 E1B-55K protein; this interaction leads to the inhibition of TP53 function and/or its degradation.</text>
</comment>
<comment type="subunit">
    <text evidence="165">(Microbial infection) Interacts with Kaposi's sarcoma-associated herpesvirus/HHV-8 protein ORF45; this interaction results in the cytoplasmic localization of TP53 thereby decreasing its transcriptional activity.</text>
</comment>
<comment type="interaction">
    <interactant intactId="EBI-366083">
        <id>P04637</id>
    </interactant>
    <interactant intactId="EBI-375543">
        <id>P00519</id>
        <label>ABL1</label>
    </interactant>
    <organismsDiffer>false</organismsDiffer>
    <experiments>2</experiments>
</comment>
<comment type="interaction">
    <interactant intactId="EBI-366083">
        <id>P04637</id>
    </interactant>
    <interactant intactId="EBI-745226">
        <id>Q13155</id>
        <label>AIMP2</label>
    </interactant>
    <organismsDiffer>false</organismsDiffer>
    <experiments>6</experiments>
</comment>
<comment type="interaction">
    <interactant intactId="EBI-366083">
        <id>P04637</id>
    </interactant>
    <interactant intactId="EBI-711158">
        <id>O95376</id>
        <label>ARIH2</label>
    </interactant>
    <organismsDiffer>false</organismsDiffer>
    <experiments>5</experiments>
</comment>
<comment type="interaction">
    <interactant intactId="EBI-366083">
        <id>P04637</id>
    </interactant>
    <interactant intactId="EBI-743313">
        <id>P49407</id>
        <label>ARRB1</label>
    </interactant>
    <organismsDiffer>false</organismsDiffer>
    <experiments>5</experiments>
</comment>
<comment type="interaction">
    <interactant intactId="EBI-366083">
        <id>P04637</id>
    </interactant>
    <interactant intactId="EBI-540797">
        <id>Q9UBL3</id>
        <label>ASH2L</label>
    </interactant>
    <organismsDiffer>false</organismsDiffer>
    <experiments>8</experiments>
</comment>
<comment type="interaction">
    <interactant intactId="EBI-366083">
        <id>P04637</id>
    </interactant>
    <interactant intactId="EBI-15980880">
        <id>O95352-2</id>
        <label>ATG7</label>
    </interactant>
    <organismsDiffer>false</organismsDiffer>
    <experiments>4</experiments>
</comment>
<comment type="interaction">
    <interactant intactId="EBI-366083">
        <id>P04637</id>
    </interactant>
    <interactant intactId="EBI-710484">
        <id>O15169</id>
        <label>AXIN1</label>
    </interactant>
    <organismsDiffer>false</organismsDiffer>
    <experiments>4</experiments>
</comment>
<comment type="interaction">
    <interactant intactId="EBI-366083">
        <id>P04637</id>
    </interactant>
    <interactant intactId="EBI-744695">
        <id>Q8N9N5</id>
        <label>BANP</label>
    </interactant>
    <organismsDiffer>false</organismsDiffer>
    <experiments>3</experiments>
</comment>
<comment type="interaction">
    <interactant intactId="EBI-366083">
        <id>P04637</id>
    </interactant>
    <interactant intactId="EBI-77694">
        <id>P10415</id>
        <label>BCL2</label>
    </interactant>
    <organismsDiffer>false</organismsDiffer>
    <experiments>5</experiments>
</comment>
<comment type="interaction">
    <interactant intactId="EBI-366083">
        <id>P04637</id>
    </interactant>
    <interactant intactId="EBI-287195">
        <id>Q07817-1</id>
        <label>BCL2L1</label>
    </interactant>
    <organismsDiffer>false</organismsDiffer>
    <experiments>26</experiments>
</comment>
<comment type="interaction">
    <interactant intactId="EBI-366083">
        <id>P04637</id>
    </interactant>
    <interactant intactId="EBI-711810">
        <id>O14503</id>
        <label>BHLHE40</label>
    </interactant>
    <organismsDiffer>false</organismsDiffer>
    <experiments>11</experiments>
</comment>
<comment type="interaction">
    <interactant intactId="EBI-366083">
        <id>P04637</id>
    </interactant>
    <interactant intactId="EBI-79792">
        <id>P51587</id>
        <label>BRCA2</label>
    </interactant>
    <organismsDiffer>false</organismsDiffer>
    <experiments>7</experiments>
</comment>
<comment type="interaction">
    <interactant intactId="EBI-366083">
        <id>P04637</id>
    </interactant>
    <interactant intactId="EBI-711221">
        <id>Q9NPI1</id>
        <label>BRD7</label>
    </interactant>
    <organismsDiffer>false</organismsDiffer>
    <experiments>9</experiments>
</comment>
<comment type="interaction">
    <interactant intactId="EBI-366083">
        <id>P04637</id>
    </interactant>
    <interactant intactId="EBI-710091">
        <id>Q9BX70</id>
        <label>BTBD2</label>
    </interactant>
    <organismsDiffer>false</organismsDiffer>
    <experiments>2</experiments>
</comment>
<comment type="interaction">
    <interactant intactId="EBI-366083">
        <id>P04637</id>
    </interactant>
    <interactant intactId="EBI-307461">
        <id>Q9Y297</id>
        <label>BTRC</label>
    </interactant>
    <organismsDiffer>false</organismsDiffer>
    <experiments>2</experiments>
</comment>
<comment type="interaction">
    <interactant intactId="EBI-366083">
        <id>P04637</id>
    </interactant>
    <interactant intactId="EBI-718729">
        <id>P55212</id>
        <label>CASP6</label>
    </interactant>
    <organismsDiffer>false</organismsDiffer>
    <experiments>3</experiments>
</comment>
<comment type="interaction">
    <interactant intactId="EBI-366083">
        <id>P04637</id>
    </interactant>
    <interactant intactId="EBI-711501">
        <id>Q9BWC9</id>
        <label>CCDC106</label>
    </interactant>
    <organismsDiffer>false</organismsDiffer>
    <experiments>3</experiments>
</comment>
<comment type="interaction">
    <interactant intactId="EBI-366083">
        <id>P04637</id>
    </interactant>
    <interactant intactId="EBI-355710">
        <id>P48643</id>
        <label>CCT5</label>
    </interactant>
    <organismsDiffer>false</organismsDiffer>
    <experiments>3</experiments>
</comment>
<comment type="interaction">
    <interactant intactId="EBI-366083">
        <id>P04637</id>
    </interactant>
    <interactant intactId="EBI-375077">
        <id>P38936</id>
        <label>CDKN1A</label>
    </interactant>
    <organismsDiffer>false</organismsDiffer>
    <experiments>5</experiments>
</comment>
<comment type="interaction">
    <interactant intactId="EBI-366083">
        <id>P04637</id>
    </interactant>
    <interactant intactId="EBI-969696">
        <id>P17676</id>
        <label>CEBPB</label>
    </interactant>
    <organismsDiffer>false</organismsDiffer>
    <experiments>4</experiments>
</comment>
<comment type="interaction">
    <interactant intactId="EBI-366083">
        <id>P04637</id>
    </interactant>
    <interactant intactId="EBI-81215">
        <id>Q92793</id>
        <label>CREBBP</label>
    </interactant>
    <organismsDiffer>false</organismsDiffer>
    <experiments>17</experiments>
</comment>
<comment type="interaction">
    <interactant intactId="EBI-366083">
        <id>P04637</id>
    </interactant>
    <interactant intactId="EBI-286709">
        <id>P55060</id>
        <label>CSE1L</label>
    </interactant>
    <organismsDiffer>false</organismsDiffer>
    <experiments>5</experiments>
</comment>
<comment type="interaction">
    <interactant intactId="EBI-366083">
        <id>P04637</id>
    </interactant>
    <interactant intactId="EBI-308606">
        <id>Q14999</id>
        <label>CUL7</label>
    </interactant>
    <organismsDiffer>false</organismsDiffer>
    <experiments>18</experiments>
</comment>
<comment type="interaction">
    <interactant intactId="EBI-366083">
        <id>P04637</id>
    </interactant>
    <interactant intactId="EBI-311123">
        <id>Q8IWT3</id>
        <label>CUL9</label>
    </interactant>
    <organismsDiffer>false</organismsDiffer>
    <experiments>15</experiments>
</comment>
<comment type="interaction">
    <interactant intactId="EBI-366083">
        <id>P04637</id>
    </interactant>
    <interactant intactId="EBI-949911">
        <id>Q9P0U4</id>
        <label>CXXC1</label>
    </interactant>
    <organismsDiffer>false</organismsDiffer>
    <experiments>7</experiments>
</comment>
<comment type="interaction">
    <interactant intactId="EBI-366083">
        <id>P04637</id>
    </interactant>
    <interactant intactId="EBI-77321">
        <id>Q9UER7</id>
        <label>DAXX</label>
    </interactant>
    <organismsDiffer>false</organismsDiffer>
    <experiments>12</experiments>
</comment>
<comment type="interaction">
    <interactant intactId="EBI-366083">
        <id>P04637</id>
    </interactant>
    <interactant intactId="EBI-746012">
        <id>Q92841</id>
        <label>DDX17</label>
    </interactant>
    <organismsDiffer>false</organismsDiffer>
    <experiments>3</experiments>
</comment>
<comment type="interaction">
    <interactant intactId="EBI-366083">
        <id>P04637</id>
    </interactant>
    <interactant intactId="EBI-351962">
        <id>P17844</id>
        <label>DDX5</label>
    </interactant>
    <organismsDiffer>false</organismsDiffer>
    <experiments>6</experiments>
</comment>
<comment type="interaction">
    <interactant intactId="EBI-366083">
        <id>P04637</id>
    </interactant>
    <interactant intactId="EBI-528367">
        <id>Q9NRR4</id>
        <label>DROSHA</label>
    </interactant>
    <organismsDiffer>false</organismsDiffer>
    <experiments>5</experiments>
</comment>
<comment type="interaction">
    <interactant intactId="EBI-366083">
        <id>P04637</id>
    </interactant>
    <interactant intactId="EBI-2924519">
        <id>Q9BV47</id>
        <label>DUSP26</label>
    </interactant>
    <organismsDiffer>false</organismsDiffer>
    <experiments>9</experiments>
</comment>
<comment type="interaction">
    <interactant intactId="EBI-366083">
        <id>P04637</id>
    </interactant>
    <interactant intactId="EBI-740850">
        <id>O14641</id>
        <label>DVL2</label>
    </interactant>
    <organismsDiffer>false</organismsDiffer>
    <experiments>6</experiments>
</comment>
<comment type="interaction">
    <interactant intactId="EBI-366083">
        <id>P04637</id>
    </interactant>
    <interactant intactId="EBI-447295">
        <id>Q09472</id>
        <label>EP300</label>
    </interactant>
    <organismsDiffer>false</organismsDiffer>
    <experiments>21</experiments>
</comment>
<comment type="interaction">
    <interactant intactId="EBI-366083">
        <id>P04637</id>
    </interactant>
    <interactant intactId="EBI-1646991">
        <id>P15036</id>
        <label>ETS2</label>
    </interactant>
    <organismsDiffer>false</organismsDiffer>
    <experiments>4</experiments>
</comment>
<comment type="interaction">
    <interactant intactId="EBI-366083">
        <id>P04637</id>
    </interactant>
    <interactant intactId="EBI-1047804">
        <id>Q86XK2</id>
        <label>FBXO11</label>
    </interactant>
    <organismsDiffer>false</organismsDiffer>
    <experiments>4</experiments>
</comment>
<comment type="interaction">
    <interactant intactId="EBI-366083">
        <id>P04637</id>
    </interactant>
    <interactant intactId="EBI-9641086">
        <id>P21333-2</id>
        <label>FLNA</label>
    </interactant>
    <organismsDiffer>false</organismsDiffer>
    <experiments>3</experiments>
</comment>
<comment type="interaction">
    <interactant intactId="EBI-366083">
        <id>P04637</id>
    </interactant>
    <interactant intactId="EBI-713291">
        <id>P51114</id>
        <label>FXR1</label>
    </interactant>
    <organismsDiffer>false</organismsDiffer>
    <experiments>2</experiments>
</comment>
<comment type="interaction">
    <interactant intactId="EBI-366083">
        <id>P04637</id>
    </interactant>
    <interactant intactId="EBI-373586">
        <id>P49841</id>
        <label>GSK3B</label>
    </interactant>
    <organismsDiffer>false</organismsDiffer>
    <experiments>3</experiments>
</comment>
<comment type="interaction">
    <interactant intactId="EBI-366083">
        <id>P04637</id>
    </interactant>
    <interactant intactId="EBI-715539">
        <id>P32780</id>
        <label>GTF2H1</label>
    </interactant>
    <organismsDiffer>false</organismsDiffer>
    <experiments>12</experiments>
</comment>
<comment type="interaction">
    <interactant intactId="EBI-366083">
        <id>P04637</id>
    </interactant>
    <interactant intactId="EBI-301834">
        <id>Q13547</id>
        <label>HDAC1</label>
    </interactant>
    <organismsDiffer>false</organismsDiffer>
    <experiments>7</experiments>
</comment>
<comment type="interaction">
    <interactant intactId="EBI-366083">
        <id>P04637</id>
    </interactant>
    <interactant intactId="EBI-692891">
        <id>Q86Z02</id>
        <label>HIPK1</label>
    </interactant>
    <organismsDiffer>false</organismsDiffer>
    <experiments>2</experiments>
</comment>
<comment type="interaction">
    <interactant intactId="EBI-366083">
        <id>P04637</id>
    </interactant>
    <interactant intactId="EBI-389432">
        <id>P09429</id>
        <label>HMGB1</label>
    </interactant>
    <organismsDiffer>false</organismsDiffer>
    <experiments>9</experiments>
</comment>
<comment type="interaction">
    <interactant intactId="EBI-366083">
        <id>P04637</id>
    </interactant>
    <interactant intactId="EBI-1049011">
        <id>P41235</id>
        <label>HNF4A</label>
    </interactant>
    <organismsDiffer>false</organismsDiffer>
    <experiments>3</experiments>
</comment>
<comment type="interaction">
    <interactant intactId="EBI-366083">
        <id>P04637</id>
    </interactant>
    <interactant intactId="EBI-304185">
        <id>P61978</id>
        <label>HNRNPK</label>
    </interactant>
    <organismsDiffer>false</organismsDiffer>
    <experiments>2</experiments>
</comment>
<comment type="interaction">
    <interactant intactId="EBI-366083">
        <id>P04637</id>
    </interactant>
    <interactant intactId="EBI-7060731">
        <id>P61978-2</id>
        <label>HNRNPK</label>
    </interactant>
    <organismsDiffer>false</organismsDiffer>
    <experiments>2</experiments>
</comment>
<comment type="interaction">
    <interactant intactId="EBI-366083">
        <id>P04637</id>
    </interactant>
    <interactant intactId="EBI-354932">
        <id>P38646</id>
        <label>HSPA9</label>
    </interactant>
    <organismsDiffer>false</organismsDiffer>
    <experiments>6</experiments>
</comment>
<comment type="interaction">
    <interactant intactId="EBI-366083">
        <id>P04637</id>
    </interactant>
    <interactant intactId="EBI-352682">
        <id>P04792</id>
        <label>HSPB1</label>
    </interactant>
    <organismsDiffer>false</organismsDiffer>
    <experiments>3</experiments>
</comment>
<comment type="interaction">
    <interactant intactId="EBI-366083">
        <id>P04637</id>
    </interactant>
    <interactant intactId="EBI-466029">
        <id>P42858</id>
        <label>HTT</label>
    </interactant>
    <organismsDiffer>false</organismsDiffer>
    <experiments>19</experiments>
</comment>
<comment type="interaction">
    <interactant intactId="EBI-366083">
        <id>P04637</id>
    </interactant>
    <interactant intactId="EBI-625934">
        <id>Q7Z6Z7</id>
        <label>HUWE1</label>
    </interactant>
    <organismsDiffer>false</organismsDiffer>
    <experiments>3</experiments>
</comment>
<comment type="interaction">
    <interactant intactId="EBI-366083">
        <id>P04637</id>
    </interactant>
    <interactant intactId="EBI-6273540">
        <id>Q16666-2</id>
        <label>IFI16</label>
    </interactant>
    <organismsDiffer>false</organismsDiffer>
    <experiments>6</experiments>
</comment>
<comment type="interaction">
    <interactant intactId="EBI-366083">
        <id>P04637</id>
    </interactant>
    <interactant intactId="EBI-81266">
        <id>O14920</id>
        <label>IKBKB</label>
    </interactant>
    <organismsDiffer>false</organismsDiffer>
    <experiments>2</experiments>
</comment>
<comment type="interaction">
    <interactant intactId="EBI-366083">
        <id>P04637</id>
    </interactant>
    <interactant intactId="EBI-747509">
        <id>Q9UHH9</id>
        <label>IP6K2</label>
    </interactant>
    <organismsDiffer>false</organismsDiffer>
    <experiments>4</experiments>
</comment>
<comment type="interaction">
    <interactant intactId="EBI-366083">
        <id>P04637</id>
    </interactant>
    <interactant intactId="EBI-8464037">
        <id>Q6NYC1</id>
        <label>JMJD6</label>
    </interactant>
    <organismsDiffer>false</organismsDiffer>
    <experiments>7</experiments>
</comment>
<comment type="interaction">
    <interactant intactId="EBI-366083">
        <id>P04637</id>
    </interactant>
    <interactant intactId="EBI-399080">
        <id>Q92993</id>
        <label>KAT5</label>
    </interactant>
    <organismsDiffer>false</organismsDiffer>
    <experiments>3</experiments>
</comment>
<comment type="interaction">
    <interactant intactId="EBI-366083">
        <id>P04637</id>
    </interactant>
    <interactant intactId="EBI-896414">
        <id>Q9H7Z6</id>
        <label>KAT8</label>
    </interactant>
    <organismsDiffer>false</organismsDiffer>
    <experiments>2</experiments>
</comment>
<comment type="interaction">
    <interactant intactId="EBI-366083">
        <id>P04637</id>
    </interactant>
    <interactant intactId="EBI-15599570">
        <id>O60341-1</id>
        <label>KDM1A</label>
    </interactant>
    <organismsDiffer>false</organismsDiffer>
    <experiments>6</experiments>
</comment>
<comment type="interaction">
    <interactant intactId="EBI-366083">
        <id>P04637</id>
    </interactant>
    <interactant intactId="EBI-2689959">
        <id>Q8IZD2</id>
        <label>KMT2E</label>
    </interactant>
    <organismsDiffer>false</organismsDiffer>
    <experiments>4</experiments>
</comment>
<comment type="interaction">
    <interactant intactId="EBI-366083">
        <id>P04637</id>
    </interactant>
    <interactant intactId="EBI-21591415">
        <id>P13473-2</id>
        <label>LAMP2</label>
    </interactant>
    <organismsDiffer>false</organismsDiffer>
    <experiments>3</experiments>
</comment>
<comment type="interaction">
    <interactant intactId="EBI-366083">
        <id>P04637</id>
    </interactant>
    <interactant intactId="EBI-5650739">
        <id>P43356</id>
        <label>MAGEA2B</label>
    </interactant>
    <organismsDiffer>false</organismsDiffer>
    <experiments>7</experiments>
</comment>
<comment type="interaction">
    <interactant intactId="EBI-366083">
        <id>P04637</id>
    </interactant>
    <interactant intactId="EBI-741835">
        <id>Q96M61</id>
        <label>MAGEB18</label>
    </interactant>
    <organismsDiffer>false</organismsDiffer>
    <experiments>3</experiments>
</comment>
<comment type="interaction">
    <interactant intactId="EBI-366083">
        <id>P04637</id>
    </interactant>
    <interactant intactId="EBI-5651487">
        <id>Q9UBF1</id>
        <label>MAGEC2</label>
    </interactant>
    <organismsDiffer>false</organismsDiffer>
    <experiments>3</experiments>
</comment>
<comment type="interaction">
    <interactant intactId="EBI-366083">
        <id>P04637</id>
    </interactant>
    <interactant intactId="EBI-764611">
        <id>P46821</id>
        <label>MAP1B</label>
    </interactant>
    <organismsDiffer>false</organismsDiffer>
    <experiments>6</experiments>
</comment>
<comment type="interaction">
    <interactant intactId="EBI-366083">
        <id>P04637</id>
    </interactant>
    <interactant intactId="EBI-298304">
        <id>Q15759</id>
        <label>MAPK11</label>
    </interactant>
    <organismsDiffer>false</organismsDiffer>
    <experiments>2</experiments>
</comment>
<comment type="interaction">
    <interactant intactId="EBI-366083">
        <id>P04637</id>
    </interactant>
    <interactant intactId="EBI-1201460">
        <id>Q8IW41</id>
        <label>MAPKAPK5</label>
    </interactant>
    <organismsDiffer>false</organismsDiffer>
    <experiments>2</experiments>
</comment>
<comment type="interaction">
    <interactant intactId="EBI-366083">
        <id>P04637</id>
    </interactant>
    <interactant intactId="EBI-389668">
        <id>Q00987</id>
        <label>MDM2</label>
    </interactant>
    <organismsDiffer>false</organismsDiffer>
    <experiments>112</experiments>
</comment>
<comment type="interaction">
    <interactant intactId="EBI-366083">
        <id>P04637</id>
    </interactant>
    <interactant intactId="EBI-398437">
        <id>O15151</id>
        <label>MDM4</label>
    </interactant>
    <organismsDiffer>false</organismsDiffer>
    <experiments>22</experiments>
</comment>
<comment type="interaction">
    <interactant intactId="EBI-366083">
        <id>P04637</id>
    </interactant>
    <interactant intactId="EBI-373524">
        <id>Q9UHC7</id>
        <label>MKRN1</label>
    </interactant>
    <organismsDiffer>false</organismsDiffer>
    <experiments>8</experiments>
</comment>
<comment type="interaction">
    <interactant intactId="EBI-366083">
        <id>P04637</id>
    </interactant>
    <interactant intactId="EBI-821405">
        <id>O75970</id>
        <label>MPDZ</label>
    </interactant>
    <organismsDiffer>false</organismsDiffer>
    <experiments>3</experiments>
</comment>
<comment type="interaction">
    <interactant intactId="EBI-366083">
        <id>P04637</id>
    </interactant>
    <interactant intactId="EBI-8045030">
        <id>P04731</id>
        <label>MT1A</label>
    </interactant>
    <organismsDiffer>false</organismsDiffer>
    <experiments>3</experiments>
</comment>
<comment type="interaction">
    <interactant intactId="EBI-366083">
        <id>P04637</id>
    </interactant>
    <interactant intactId="EBI-346967">
        <id>P19338</id>
        <label>NCL</label>
    </interactant>
    <organismsDiffer>false</organismsDiffer>
    <experiments>2</experiments>
</comment>
<comment type="interaction">
    <interactant intactId="EBI-366083">
        <id>P04637</id>
    </interactant>
    <interactant intactId="EBI-80830">
        <id>Q9Y618</id>
        <label>NCOR2</label>
    </interactant>
    <organismsDiffer>false</organismsDiffer>
    <experiments>7</experiments>
</comment>
<comment type="interaction">
    <interactant intactId="EBI-366083">
        <id>P04637</id>
    </interactant>
    <interactant intactId="EBI-718177">
        <id>Q99608</id>
        <label>NDN</label>
    </interactant>
    <organismsDiffer>false</organismsDiffer>
    <experiments>4</experiments>
</comment>
<comment type="interaction">
    <interactant intactId="EBI-366083">
        <id>P04637</id>
    </interactant>
    <interactant intactId="EBI-389739">
        <id>P23511</id>
        <label>NFYA</label>
    </interactant>
    <organismsDiffer>false</organismsDiffer>
    <experiments>11</experiments>
</comment>
<comment type="interaction">
    <interactant intactId="EBI-366083">
        <id>P04637</id>
    </interactant>
    <interactant intactId="EBI-389728">
        <id>P25208</id>
        <label>NFYB</label>
    </interactant>
    <organismsDiffer>false</organismsDiffer>
    <experiments>6</experiments>
</comment>
<comment type="interaction">
    <interactant intactId="EBI-366083">
        <id>P04637</id>
    </interactant>
    <interactant intactId="EBI-751547">
        <id>Q9Y3T9</id>
        <label>NOC2L</label>
    </interactant>
    <organismsDiffer>false</organismsDiffer>
    <experiments>8</experiments>
</comment>
<comment type="interaction">
    <interactant intactId="EBI-366083">
        <id>P04637</id>
    </interactant>
    <interactant intactId="EBI-740992">
        <id>O60936</id>
        <label>NOL3</label>
    </interactant>
    <organismsDiffer>false</organismsDiffer>
    <experiments>3</experiments>
</comment>
<comment type="interaction">
    <interactant intactId="EBI-366083">
        <id>P04637</id>
    </interactant>
    <interactant intactId="EBI-78579">
        <id>P06748</id>
        <label>NPM1</label>
    </interactant>
    <organismsDiffer>false</organismsDiffer>
    <experiments>6</experiments>
</comment>
<comment type="interaction">
    <interactant intactId="EBI-366083">
        <id>P04637</id>
    </interactant>
    <interactant intactId="EBI-354150">
        <id>P06748-1</id>
        <label>NPM1</label>
    </interactant>
    <organismsDiffer>false</organismsDiffer>
    <experiments>3</experiments>
</comment>
<comment type="interaction">
    <interactant intactId="EBI-366083">
        <id>P04637</id>
    </interactant>
    <interactant intactId="EBI-3910729">
        <id>Q15466</id>
        <label>NR0B2</label>
    </interactant>
    <organismsDiffer>false</organismsDiffer>
    <experiments>3</experiments>
</comment>
<comment type="interaction">
    <interactant intactId="EBI-366083">
        <id>P04637</id>
    </interactant>
    <interactant intactId="EBI-721550">
        <id>P22736</id>
        <label>NR4A1</label>
    </interactant>
    <organismsDiffer>false</organismsDiffer>
    <experiments>6</experiments>
</comment>
<comment type="interaction">
    <interactant intactId="EBI-366083">
        <id>P04637</id>
    </interactant>
    <interactant intactId="EBI-2371631">
        <id>O43847</id>
        <label>NRDC</label>
    </interactant>
    <organismsDiffer>false</organismsDiffer>
    <experiments>6</experiments>
</comment>
<comment type="interaction">
    <interactant intactId="EBI-366083">
        <id>P04637</id>
    </interactant>
    <interactant intactId="EBI-1046789">
        <id>O60285</id>
        <label>NUAK1</label>
    </interactant>
    <organismsDiffer>false</organismsDiffer>
    <experiments>5</experiments>
</comment>
<comment type="interaction">
    <interactant intactId="EBI-366083">
        <id>P04637</id>
    </interactant>
    <interactant intactId="EBI-915016">
        <id>P49757</id>
        <label>NUMB</label>
    </interactant>
    <organismsDiffer>false</organismsDiffer>
    <experiments>5</experiments>
</comment>
<comment type="interaction">
    <interactant intactId="EBI-366083">
        <id>P04637</id>
    </interactant>
    <interactant intactId="EBI-1058491">
        <id>Q96FW1</id>
        <label>OTUB1</label>
    </interactant>
    <organismsDiffer>false</organismsDiffer>
    <experiments>8</experiments>
</comment>
<comment type="interaction">
    <interactant intactId="EBI-366083">
        <id>P04637</id>
    </interactant>
    <interactant intactId="EBI-81968">
        <id>Q8TEW0</id>
        <label>PARD3</label>
    </interactant>
    <organismsDiffer>false</organismsDiffer>
    <experiments>3</experiments>
</comment>
<comment type="interaction">
    <interactant intactId="EBI-366083">
        <id>P04637</id>
    </interactant>
    <interactant intactId="EBI-355676">
        <id>P09874</id>
        <label>PARP1</label>
    </interactant>
    <organismsDiffer>false</organismsDiffer>
    <experiments>3</experiments>
</comment>
<comment type="interaction">
    <interactant intactId="EBI-366083">
        <id>P04637</id>
    </interactant>
    <interactant intactId="EBI-536853">
        <id>Q96KB5</id>
        <label>PBK</label>
    </interactant>
    <organismsDiffer>false</organismsDiffer>
    <experiments>7</experiments>
</comment>
<comment type="interaction">
    <interactant intactId="EBI-366083">
        <id>P04637</id>
    </interactant>
    <interactant intactId="EBI-752057">
        <id>Q7Z412</id>
        <label>PEX26</label>
    </interactant>
    <organismsDiffer>false</organismsDiffer>
    <experiments>3</experiments>
</comment>
<comment type="interaction">
    <interactant intactId="EBI-366083">
        <id>P04637</id>
    </interactant>
    <interactant intactId="EBI-354213">
        <id>P35232</id>
        <label>PHB1</label>
    </interactant>
    <organismsDiffer>false</organismsDiffer>
    <experiments>6</experiments>
</comment>
<comment type="interaction">
    <interactant intactId="EBI-366083">
        <id>P04637</id>
    </interactant>
    <interactant intactId="EBI-629434">
        <id>O75925</id>
        <label>PIAS1</label>
    </interactant>
    <organismsDiffer>false</organismsDiffer>
    <experiments>4</experiments>
</comment>
<comment type="interaction">
    <interactant intactId="EBI-366083">
        <id>P04637</id>
    </interactant>
    <interactant intactId="EBI-473160">
        <id>Q8N2W9</id>
        <label>PIAS4</label>
    </interactant>
    <organismsDiffer>false</organismsDiffer>
    <experiments>2</experiments>
</comment>
<comment type="interaction">
    <interactant intactId="EBI-366083">
        <id>P04637</id>
    </interactant>
    <interactant intactId="EBI-79893">
        <id>Q92569</id>
        <label>PIK3R3</label>
    </interactant>
    <organismsDiffer>false</organismsDiffer>
    <experiments>5</experiments>
</comment>
<comment type="interaction">
    <interactant intactId="EBI-366083">
        <id>P04637</id>
    </interactant>
    <interactant intactId="EBI-714158">
        <id>Q13526</id>
        <label>PIN1</label>
    </interactant>
    <organismsDiffer>false</organismsDiffer>
    <experiments>12</experiments>
</comment>
<comment type="interaction">
    <interactant intactId="EBI-366083">
        <id>P04637</id>
    </interactant>
    <interactant intactId="EBI-476768">
        <id>P53350</id>
        <label>PLK1</label>
    </interactant>
    <organismsDiffer>false</organismsDiffer>
    <experiments>6</experiments>
</comment>
<comment type="interaction">
    <interactant intactId="EBI-366083">
        <id>P04637</id>
    </interactant>
    <interactant intactId="EBI-295890">
        <id>P29590</id>
        <label>PML</label>
    </interactant>
    <organismsDiffer>false</organismsDiffer>
    <experiments>4</experiments>
</comment>
<comment type="interaction">
    <interactant intactId="EBI-366083">
        <id>P04637</id>
    </interactant>
    <interactant intactId="EBI-50433196">
        <id>A0A6Q8PF08</id>
        <label>PMP22</label>
    </interactant>
    <organismsDiffer>false</organismsDiffer>
    <experiments>3</experiments>
</comment>
<comment type="interaction">
    <interactant intactId="EBI-366083">
        <id>P04637</id>
    </interactant>
    <interactant intactId="EBI-5544229">
        <id>P30405</id>
        <label>PPIF</label>
    </interactant>
    <organismsDiffer>false</organismsDiffer>
    <experiments>4</experiments>
</comment>
<comment type="interaction">
    <interactant intactId="EBI-366083">
        <id>P04637</id>
    </interactant>
    <interactant intactId="EBI-356289">
        <id>P36873-1</id>
        <label>PPP1CC</label>
    </interactant>
    <organismsDiffer>false</organismsDiffer>
    <experiments>2</experiments>
</comment>
<comment type="interaction">
    <interactant intactId="EBI-366083">
        <id>P04637</id>
    </interactant>
    <interactant intactId="EBI-5550163">
        <id>Q8WUF5</id>
        <label>PPP1R13L</label>
    </interactant>
    <organismsDiffer>false</organismsDiffer>
    <experiments>12</experiments>
</comment>
<comment type="interaction">
    <interactant intactId="EBI-366083">
        <id>P04637</id>
    </interactant>
    <interactant intactId="EBI-302388">
        <id>P30153</id>
        <label>PPP2R1A</label>
    </interactant>
    <organismsDiffer>false</organismsDiffer>
    <experiments>3</experiments>
</comment>
<comment type="interaction">
    <interactant intactId="EBI-366083">
        <id>P04637</id>
    </interactant>
    <interactant intactId="EBI-1266156">
        <id>Q13362</id>
        <label>PPP2R5C</label>
    </interactant>
    <organismsDiffer>false</organismsDiffer>
    <experiments>4</experiments>
</comment>
<comment type="interaction">
    <interactant intactId="EBI-366083">
        <id>P04637</id>
    </interactant>
    <interactant intactId="EBI-704279">
        <id>Q05655</id>
        <label>PRKCD</label>
    </interactant>
    <organismsDiffer>false</organismsDiffer>
    <experiments>4</experiments>
</comment>
<comment type="interaction">
    <interactant intactId="EBI-366083">
        <id>P04637</id>
    </interactant>
    <interactant intactId="EBI-355546">
        <id>P61289</id>
        <label>PSME3</label>
    </interactant>
    <organismsDiffer>false</organismsDiffer>
    <experiments>7</experiments>
</comment>
<comment type="interaction">
    <interactant intactId="EBI-366083">
        <id>P04637</id>
    </interactant>
    <interactant intactId="EBI-702142">
        <id>Q05397</id>
        <label>PTK2</label>
    </interactant>
    <organismsDiffer>false</organismsDiffer>
    <experiments>13</experiments>
</comment>
<comment type="interaction">
    <interactant intactId="EBI-366083">
        <id>P04637</id>
    </interactant>
    <interactant intactId="EBI-297202">
        <id>Q06609</id>
        <label>RAD51</label>
    </interactant>
    <organismsDiffer>false</organismsDiffer>
    <experiments>2</experiments>
</comment>
<comment type="interaction">
    <interactant intactId="EBI-366083">
        <id>P04637</id>
    </interactant>
    <interactant intactId="EBI-632552">
        <id>Q06330</id>
        <label>RBPJ</label>
    </interactant>
    <organismsDiffer>false</organismsDiffer>
    <experiments>5</experiments>
</comment>
<comment type="interaction">
    <interactant intactId="EBI-366083">
        <id>P04637</id>
    </interactant>
    <interactant intactId="EBI-947779">
        <id>Q96PM5</id>
        <label>RCHY1</label>
    </interactant>
    <organismsDiffer>false</organismsDiffer>
    <experiments>13</experiments>
</comment>
<comment type="interaction">
    <interactant intactId="EBI-366083">
        <id>P04637</id>
    </interactant>
    <interactant intactId="EBI-2129159">
        <id>Q6PCD5</id>
        <label>RFWD3</label>
    </interactant>
    <organismsDiffer>false</organismsDiffer>
    <experiments>5</experiments>
</comment>
<comment type="interaction">
    <interactant intactId="EBI-366083">
        <id>P04637</id>
    </interactant>
    <interactant intactId="EBI-752313">
        <id>Q06587</id>
        <label>RING1</label>
    </interactant>
    <organismsDiffer>false</organismsDiffer>
    <experiments>7</experiments>
</comment>
<comment type="interaction">
    <interactant intactId="EBI-366083">
        <id>P04637</id>
    </interactant>
    <interactant intactId="EBI-351193">
        <id>P23396</id>
        <label>RPS3</label>
    </interactant>
    <organismsDiffer>false</organismsDiffer>
    <experiments>4</experiments>
</comment>
<comment type="interaction">
    <interactant intactId="EBI-366083">
        <id>P04637</id>
    </interactant>
    <interactant intactId="EBI-353675">
        <id>Q9Y265</id>
        <label>RUVBL1</label>
    </interactant>
    <organismsDiffer>false</organismsDiffer>
    <experiments>10</experiments>
</comment>
<comment type="interaction">
    <interactant intactId="EBI-366083">
        <id>P04637</id>
    </interactant>
    <interactant intactId="EBI-752324">
        <id>Q8N488</id>
        <label>RYBP</label>
    </interactant>
    <organismsDiffer>false</organismsDiffer>
    <experiments>4</experiments>
</comment>
<comment type="interaction">
    <interactant intactId="EBI-366083">
        <id>P04637</id>
    </interactant>
    <interactant intactId="EBI-743686">
        <id>P23297</id>
        <label>S100A1</label>
    </interactant>
    <organismsDiffer>false</organismsDiffer>
    <experiments>3</experiments>
</comment>
<comment type="interaction">
    <interactant intactId="EBI-366083">
        <id>P04637</id>
    </interactant>
    <interactant intactId="EBI-701862">
        <id>P31949</id>
        <label>S100A11</label>
    </interactant>
    <organismsDiffer>false</organismsDiffer>
    <experiments>2</experiments>
</comment>
<comment type="interaction">
    <interactant intactId="EBI-366083">
        <id>P04637</id>
    </interactant>
    <interactant intactId="EBI-752230">
        <id>P29034</id>
        <label>S100A2</label>
    </interactant>
    <organismsDiffer>false</organismsDiffer>
    <experiments>4</experiments>
</comment>
<comment type="interaction">
    <interactant intactId="EBI-366083">
        <id>P04637</id>
    </interactant>
    <interactant intactId="EBI-1044747">
        <id>P33764</id>
        <label>S100A3</label>
    </interactant>
    <organismsDiffer>false</organismsDiffer>
    <experiments>2</experiments>
</comment>
<comment type="interaction">
    <interactant intactId="EBI-366083">
        <id>P04637</id>
    </interactant>
    <interactant intactId="EBI-717058">
        <id>P26447</id>
        <label>S100A4</label>
    </interactant>
    <organismsDiffer>false</organismsDiffer>
    <experiments>9</experiments>
</comment>
<comment type="interaction">
    <interactant intactId="EBI-366083">
        <id>P04637</id>
    </interactant>
    <interactant intactId="EBI-7211732">
        <id>P33763</id>
        <label>S100A5</label>
    </interactant>
    <organismsDiffer>false</organismsDiffer>
    <experiments>2</experiments>
</comment>
<comment type="interaction">
    <interactant intactId="EBI-366083">
        <id>P04637</id>
    </interactant>
    <interactant intactId="EBI-352877">
        <id>P06703</id>
        <label>S100A6</label>
    </interactant>
    <organismsDiffer>false</organismsDiffer>
    <experiments>3</experiments>
</comment>
<comment type="interaction">
    <interactant intactId="EBI-366083">
        <id>P04637</id>
    </interactant>
    <interactant intactId="EBI-458391">
        <id>P04271</id>
        <label>S100B</label>
    </interactant>
    <organismsDiffer>false</organismsDiffer>
    <experiments>3</experiments>
</comment>
<comment type="interaction">
    <interactant intactId="EBI-366083">
        <id>P04637</id>
    </interactant>
    <interactant intactId="EBI-743700">
        <id>P25815</id>
        <label>S100P</label>
    </interactant>
    <organismsDiffer>false</organismsDiffer>
    <experiments>2</experiments>
</comment>
<comment type="interaction">
    <interactant intactId="EBI-366083">
        <id>P04637</id>
    </interactant>
    <interactant intactId="EBI-348298">
        <id>Q15424</id>
        <label>SAFB</label>
    </interactant>
    <organismsDiffer>false</organismsDiffer>
    <experiments>5</experiments>
</comment>
<comment type="interaction">
    <interactant intactId="EBI-366083">
        <id>P04637</id>
    </interactant>
    <interactant intactId="EBI-1268586">
        <id>Q8WTS6</id>
        <label>SETD7</label>
    </interactant>
    <organismsDiffer>false</organismsDiffer>
    <experiments>11</experiments>
</comment>
<comment type="interaction">
    <interactant intactId="EBI-366083">
        <id>P04637</id>
    </interactant>
    <interactant intactId="EBI-476295">
        <id>P31947</id>
        <label>SFN</label>
    </interactant>
    <organismsDiffer>false</organismsDiffer>
    <experiments>5</experiments>
</comment>
<comment type="interaction">
    <interactant intactId="EBI-366083">
        <id>P04637</id>
    </interactant>
    <interactant intactId="EBI-347218">
        <id>Q96ST3</id>
        <label>SIN3A</label>
    </interactant>
    <organismsDiffer>false</organismsDiffer>
    <experiments>2</experiments>
</comment>
<comment type="interaction">
    <interactant intactId="EBI-366083">
        <id>P04637</id>
    </interactant>
    <interactant intactId="EBI-1802965">
        <id>Q96EB6</id>
        <label>SIRT1</label>
    </interactant>
    <organismsDiffer>false</organismsDiffer>
    <experiments>18</experiments>
</comment>
<comment type="interaction">
    <interactant intactId="EBI-366083">
        <id>P04637</id>
    </interactant>
    <interactant intactId="EBI-1040141">
        <id>Q15796</id>
        <label>SMAD2</label>
    </interactant>
    <organismsDiffer>false</organismsDiffer>
    <experiments>7</experiments>
</comment>
<comment type="interaction">
    <interactant intactId="EBI-366083">
        <id>P04637</id>
    </interactant>
    <interactant intactId="EBI-1055671">
        <id>Q9NRG4</id>
        <label>SMYD2</label>
    </interactant>
    <organismsDiffer>false</organismsDiffer>
    <experiments>6</experiments>
</comment>
<comment type="interaction">
    <interactant intactId="EBI-366083">
        <id>P04637</id>
    </interactant>
    <interactant intactId="EBI-1045459">
        <id>O95863</id>
        <label>SNAI1</label>
    </interactant>
    <organismsDiffer>false</organismsDiffer>
    <experiments>2</experiments>
</comment>
<comment type="interaction">
    <interactant intactId="EBI-366083">
        <id>P04637</id>
    </interactant>
    <interactant intactId="EBI-6672525">
        <id>Q06945</id>
        <label>SOX4</label>
    </interactant>
    <organismsDiffer>false</organismsDiffer>
    <experiments>4</experiments>
</comment>
<comment type="interaction">
    <interactant intactId="EBI-366083">
        <id>P04637</id>
    </interactant>
    <interactant intactId="EBI-298336">
        <id>P08047</id>
        <label>SP1</label>
    </interactant>
    <organismsDiffer>false</organismsDiffer>
    <experiments>3</experiments>
</comment>
<comment type="interaction">
    <interactant intactId="EBI-366083">
        <id>P04637</id>
    </interactant>
    <interactant intactId="EBI-465059">
        <id>Q12772</id>
        <label>SREBF2</label>
    </interactant>
    <organismsDiffer>false</organismsDiffer>
    <experiments>3</experiments>
</comment>
<comment type="interaction">
    <interactant intactId="EBI-366083">
        <id>P04637</id>
    </interactant>
    <interactant intactId="EBI-539478">
        <id>Q96SB4</id>
        <label>SRPK1</label>
    </interactant>
    <organismsDiffer>false</organismsDiffer>
    <experiments>3</experiments>
</comment>
<comment type="interaction">
    <interactant intactId="EBI-366083">
        <id>P04637</id>
    </interactant>
    <interactant intactId="EBI-1054052">
        <id>P31948</id>
        <label>STIP1</label>
    </interactant>
    <organismsDiffer>false</organismsDiffer>
    <experiments>4</experiments>
</comment>
<comment type="interaction">
    <interactant intactId="EBI-366083">
        <id>P04637</id>
    </interactant>
    <interactant intactId="EBI-80140">
        <id>P63165</id>
        <label>SUMO1</label>
    </interactant>
    <organismsDiffer>false</organismsDiffer>
    <experiments>3</experiments>
</comment>
<comment type="interaction">
    <interactant intactId="EBI-366083">
        <id>P04637</id>
    </interactant>
    <interactant intactId="EBI-947849">
        <id>Q86TM6</id>
        <label>SYVN1</label>
    </interactant>
    <organismsDiffer>false</organismsDiffer>
    <experiments>5</experiments>
</comment>
<comment type="interaction">
    <interactant intactId="EBI-366083">
        <id>P04637</id>
    </interactant>
    <interactant intactId="EBI-751601">
        <id>Q9HBM6</id>
        <label>TAF9B</label>
    </interactant>
    <organismsDiffer>false</organismsDiffer>
    <experiments>2</experiments>
</comment>
<comment type="interaction">
    <interactant intactId="EBI-366083">
        <id>P04637</id>
    </interactant>
    <interactant intactId="EBI-355371">
        <id>P20226</id>
        <label>TBP</label>
    </interactant>
    <organismsDiffer>false</organismsDiffer>
    <experiments>2</experiments>
</comment>
<comment type="interaction">
    <interactant intactId="EBI-366083">
        <id>P04637</id>
    </interactant>
    <interactant intactId="EBI-533224">
        <id>P15884</id>
        <label>TCF4</label>
    </interactant>
    <organismsDiffer>false</organismsDiffer>
    <experiments>2</experiments>
</comment>
<comment type="interaction">
    <interactant intactId="EBI-366083">
        <id>P04637</id>
    </interactant>
    <interactant intactId="EBI-717460">
        <id>Q96GM8</id>
        <label>TOE1</label>
    </interactant>
    <organismsDiffer>false</organismsDiffer>
    <experiments>3</experiments>
</comment>
<comment type="interaction">
    <interactant intactId="EBI-366083">
        <id>P04637</id>
    </interactant>
    <interactant intactId="EBI-366083">
        <id>P04637</id>
        <label>TP53</label>
    </interactant>
    <organismsDiffer>false</organismsDiffer>
    <experiments>33</experiments>
</comment>
<comment type="interaction">
    <interactant intactId="EBI-366083">
        <id>P04637</id>
    </interactant>
    <interactant intactId="EBI-396540">
        <id>Q12888</id>
        <label>TP53BP1</label>
    </interactant>
    <organismsDiffer>false</organismsDiffer>
    <experiments>8</experiments>
</comment>
<comment type="interaction">
    <interactant intactId="EBI-366083">
        <id>P04637</id>
    </interactant>
    <interactant intactId="EBI-8022649">
        <id>Q12888-1</id>
        <label>TP53BP1</label>
    </interactant>
    <organismsDiffer>false</organismsDiffer>
    <experiments>17</experiments>
</comment>
<comment type="interaction">
    <interactant intactId="EBI-366083">
        <id>P04637</id>
    </interactant>
    <interactant intactId="EBI-77642">
        <id>Q13625</id>
        <label>TP53BP2</label>
    </interactant>
    <organismsDiffer>false</organismsDiffer>
    <experiments>9</experiments>
</comment>
<comment type="interaction">
    <interactant intactId="EBI-366083">
        <id>P04637</id>
    </interactant>
    <interactant intactId="EBI-2337775">
        <id>Q9H3D4</id>
        <label>TP63</label>
    </interactant>
    <organismsDiffer>false</organismsDiffer>
    <experiments>5</experiments>
</comment>
<comment type="interaction">
    <interactant intactId="EBI-366083">
        <id>P04637</id>
    </interactant>
    <interactant intactId="EBI-1783169">
        <id>P13693</id>
        <label>TPT1</label>
    </interactant>
    <organismsDiffer>false</organismsDiffer>
    <experiments>7</experiments>
</comment>
<comment type="interaction">
    <interactant intactId="EBI-366083">
        <id>P04637</id>
    </interactant>
    <interactant intactId="EBI-2130378">
        <id>O15164</id>
        <label>TRIM24</label>
    </interactant>
    <organismsDiffer>false</organismsDiffer>
    <experiments>3</experiments>
</comment>
<comment type="interaction">
    <interactant intactId="EBI-366083">
        <id>P04637</id>
    </interactant>
    <interactant intactId="EBI-1797287">
        <id>Q15672</id>
        <label>TWIST1</label>
    </interactant>
    <organismsDiffer>false</organismsDiffer>
    <experiments>10</experiments>
</comment>
<comment type="interaction">
    <interactant intactId="EBI-366083">
        <id>P04637</id>
    </interactant>
    <interactant intactId="EBI-3390054">
        <id>P0CG48</id>
        <label>UBC</label>
    </interactant>
    <organismsDiffer>false</organismsDiffer>
    <experiments>15</experiments>
</comment>
<comment type="interaction">
    <interactant intactId="EBI-366083">
        <id>P04637</id>
    </interactant>
    <interactant intactId="EBI-80168">
        <id>P63279</id>
        <label>UBE2I</label>
    </interactant>
    <organismsDiffer>false</organismsDiffer>
    <experiments>3</experiments>
</comment>
<comment type="interaction">
    <interactant intactId="EBI-366083">
        <id>P04637</id>
    </interactant>
    <interactant intactId="EBI-954357">
        <id>Q05086</id>
        <label>UBE3A</label>
    </interactant>
    <organismsDiffer>false</organismsDiffer>
    <experiments>6</experiments>
</comment>
<comment type="interaction">
    <interactant intactId="EBI-366083">
        <id>P04637</id>
    </interactant>
    <interactant intactId="EBI-714860">
        <id>P09936</id>
        <label>UCHL1</label>
    </interactant>
    <organismsDiffer>false</organismsDiffer>
    <experiments>3</experiments>
</comment>
<comment type="interaction">
    <interactant intactId="EBI-366083">
        <id>P04637</id>
    </interactant>
    <interactant intactId="EBI-625304">
        <id>Q96PU4</id>
        <label>UHRF2</label>
    </interactant>
    <organismsDiffer>false</organismsDiffer>
    <experiments>3</experiments>
</comment>
<comment type="interaction">
    <interactant intactId="EBI-366083">
        <id>P04637</id>
    </interactant>
    <interactant intactId="EBI-2513638">
        <id>Q9H9J4</id>
        <label>USP42</label>
    </interactant>
    <organismsDiffer>false</organismsDiffer>
    <experiments>2</experiments>
</comment>
<comment type="interaction">
    <interactant intactId="EBI-366083">
        <id>P04637</id>
    </interactant>
    <interactant intactId="EBI-9118105">
        <id>Q9H9J4-2</id>
        <label>USP42</label>
    </interactant>
    <organismsDiffer>false</organismsDiffer>
    <experiments>2</experiments>
</comment>
<comment type="interaction">
    <interactant intactId="EBI-366083">
        <id>P04637</id>
    </interactant>
    <interactant intactId="EBI-302474">
        <id>Q93009</id>
        <label>USP7</label>
    </interactant>
    <organismsDiffer>false</organismsDiffer>
    <experiments>19</experiments>
</comment>
<comment type="interaction">
    <interactant intactId="EBI-366083">
        <id>P04637</id>
    </interactant>
    <interactant intactId="EBI-286357">
        <id>P11473</id>
        <label>VDR</label>
    </interactant>
    <organismsDiffer>false</organismsDiffer>
    <experiments>6</experiments>
</comment>
<comment type="interaction">
    <interactant intactId="EBI-366083">
        <id>P04637</id>
    </interactant>
    <interactant intactId="EBI-1769146">
        <id>Q99986</id>
        <label>VRK1</label>
    </interactant>
    <organismsDiffer>false</organismsDiffer>
    <experiments>11</experiments>
</comment>
<comment type="interaction">
    <interactant intactId="EBI-366083">
        <id>P04637</id>
    </interactant>
    <interactant intactId="EBI-368417">
        <id>Q14191</id>
        <label>WRN</label>
    </interactant>
    <organismsDiffer>false</organismsDiffer>
    <experiments>5</experiments>
</comment>
<comment type="interaction">
    <interactant intactId="EBI-366083">
        <id>P04637</id>
    </interactant>
    <interactant intactId="EBI-4320739">
        <id>Q9NZC7</id>
        <label>WWOX</label>
    </interactant>
    <organismsDiffer>false</organismsDiffer>
    <experiments>2</experiments>
</comment>
<comment type="interaction">
    <interactant intactId="EBI-366083">
        <id>P04637</id>
    </interactant>
    <interactant intactId="EBI-355867">
        <id>O14980</id>
        <label>XPO1</label>
    </interactant>
    <organismsDiffer>false</organismsDiffer>
    <experiments>3</experiments>
</comment>
<comment type="interaction">
    <interactant intactId="EBI-366083">
        <id>P04637</id>
    </interactant>
    <interactant intactId="EBI-353208">
        <id>P12956</id>
        <label>XRCC6</label>
    </interactant>
    <organismsDiffer>false</organismsDiffer>
    <experiments>2</experiments>
</comment>
<comment type="interaction">
    <interactant intactId="EBI-366083">
        <id>P04637</id>
    </interactant>
    <interactant intactId="EBI-359832">
        <id>P61981</id>
        <label>YWHAG</label>
    </interactant>
    <organismsDiffer>false</organismsDiffer>
    <experiments>5</experiments>
</comment>
<comment type="interaction">
    <interactant intactId="EBI-366083">
        <id>P04637</id>
    </interactant>
    <interactant intactId="EBI-347088">
        <id>P63104</id>
        <label>YWHAZ</label>
    </interactant>
    <organismsDiffer>false</organismsDiffer>
    <experiments>3</experiments>
</comment>
<comment type="interaction">
    <interactant intactId="EBI-366083">
        <id>P04637</id>
    </interactant>
    <interactant intactId="EBI-3923307">
        <id>Q8TAQ5</id>
        <label>ZNF420</label>
    </interactant>
    <organismsDiffer>false</organismsDiffer>
    <experiments>4</experiments>
</comment>
<comment type="interaction">
    <interactant intactId="EBI-366083">
        <id>P04637</id>
    </interactant>
    <interactant intactId="EBI-7210801">
        <id>Q7L7W2</id>
    </interactant>
    <organismsDiffer>false</organismsDiffer>
    <experiments>2</experiments>
</comment>
<comment type="interaction">
    <interactant intactId="EBI-366083">
        <id>P04637</id>
    </interactant>
    <interactant intactId="EBI-4303019">
        <id>P29066</id>
        <label>Arrb1</label>
    </interactant>
    <organismsDiffer>true</organismsDiffer>
    <experiments>3</experiments>
</comment>
<comment type="interaction">
    <interactant intactId="EBI-366083">
        <id>P04637</id>
    </interactant>
    <interactant intactId="EBI-604411">
        <id>Q9ESJ1</id>
        <label>Cables1</label>
    </interactant>
    <organismsDiffer>true</organismsDiffer>
    <experiments>3</experiments>
</comment>
<comment type="interaction">
    <interactant intactId="EBI-366083">
        <id>P04637</id>
    </interactant>
    <interactant intactId="EBI-296306">
        <id>P45481</id>
        <label>Crebbp</label>
    </interactant>
    <organismsDiffer>true</organismsDiffer>
    <experiments>10</experiments>
</comment>
<comment type="interaction">
    <interactant intactId="EBI-366083">
        <id>P04637</id>
    </interactant>
    <interactant intactId="EBI-1177242">
        <id>P03126</id>
        <label>E6</label>
    </interactant>
    <organismsDiffer>true</organismsDiffer>
    <experiments>5</experiments>
</comment>
<comment type="interaction">
    <interactant intactId="EBI-366083">
        <id>P04637</id>
    </interactant>
    <interactant intactId="EBI-1186926">
        <id>P06463</id>
        <label>E6</label>
    </interactant>
    <organismsDiffer>true</organismsDiffer>
    <experiments>3</experiments>
</comment>
<comment type="interaction">
    <interactant intactId="EBI-366083">
        <id>P04637</id>
    </interactant>
    <interactant intactId="EBI-8659">
        <id>P02829</id>
        <label>HSP82</label>
    </interactant>
    <organismsDiffer>true</organismsDiffer>
    <experiments>8</experiments>
</comment>
<comment type="interaction">
    <interactant intactId="EBI-366083">
        <id>P04637</id>
    </interactant>
    <interactant intactId="EBI-8064290">
        <id>Q08619</id>
        <label>Ifi205b</label>
    </interactant>
    <organismsDiffer>true</organismsDiffer>
    <experiments>2</experiments>
</comment>
<comment type="interaction">
    <interactant intactId="EBI-366083">
        <id>P04637</id>
    </interactant>
    <interactant intactId="EBI-9522973">
        <id>P89055</id>
        <label>NSP1</label>
    </interactant>
    <organismsDiffer>true</organismsDiffer>
    <experiments>6</experiments>
</comment>
<comment type="interaction">
    <interactant intactId="EBI-366083">
        <id>P04637</id>
    </interactant>
    <interactant intactId="EBI-1802585">
        <id>Q923E4</id>
        <label>Sirt1</label>
    </interactant>
    <organismsDiffer>true</organismsDiffer>
    <experiments>4</experiments>
</comment>
<comment type="interaction">
    <interactant intactId="EBI-366083">
        <id>P04637</id>
    </interactant>
    <interactant intactId="EBI-15612527">
        <id>Q8R5A0</id>
        <label>Smyd2</label>
    </interactant>
    <organismsDiffer>true</organismsDiffer>
    <experiments>3</experiments>
</comment>
<comment type="interaction">
    <interactant intactId="EBI-366083">
        <id>P04637</id>
    </interactant>
    <interactant intactId="EBI-19146">
        <id>P32776</id>
        <label>TFB1</label>
    </interactant>
    <organismsDiffer>true</organismsDiffer>
    <experiments>7</experiments>
</comment>
<comment type="interaction">
    <interactant intactId="EBI-366083">
        <id>P04637</id>
    </interactant>
    <interactant intactId="EBI-2338025">
        <id>O88898</id>
        <label>Tp63</label>
    </interactant>
    <organismsDiffer>true</organismsDiffer>
    <experiments>2</experiments>
</comment>
<comment type="interaction">
    <interactant intactId="EBI-366083">
        <id>P04637</id>
    </interactant>
    <interactant intactId="EBI-6123119">
        <id>P26687</id>
        <label>Twist1</label>
    </interactant>
    <organismsDiffer>true</organismsDiffer>
    <experiments>4</experiments>
</comment>
<comment type="interaction">
    <interactant intactId="EBI-366083">
        <id>P04637</id>
    </interactant>
    <interactant intactId="EBI-1782562">
        <id>Q9PST7</id>
        <label>znf585b.S</label>
    </interactant>
    <organismsDiffer>true</organismsDiffer>
    <experiments>3</experiments>
</comment>
<comment type="interaction">
    <interactant intactId="EBI-366083">
        <id>P04637</id>
    </interactant>
    <interactant intactId="EBI-617698">
        <id>P03070</id>
    </interactant>
    <organismsDiffer>true</organismsDiffer>
    <experiments>22</experiments>
</comment>
<comment type="interaction">
    <interactant intactId="EBI-366083">
        <id>P04637</id>
    </interactant>
    <interactant intactId="EBI-6838571">
        <id>PRO_0000037536</id>
        <dbReference type="UniProtKB" id="P26663"/>
    </interactant>
    <organismsDiffer>true</organismsDiffer>
    <experiments>9</experiments>
</comment>
<comment type="interaction">
    <interactant intactId="EBI-366083">
        <id>P04637</id>
    </interactant>
    <interactant intactId="EBI-6863726">
        <id>Q8QW27</id>
    </interactant>
    <organismsDiffer>true</organismsDiffer>
    <experiments>2</experiments>
</comment>
<comment type="interaction">
    <interactant intactId="EBI-3895849">
        <id>P04637-1</id>
    </interactant>
    <interactant intactId="EBI-351962">
        <id>P17844</id>
        <label>DDX5</label>
    </interactant>
    <organismsDiffer>false</organismsDiffer>
    <experiments>2</experiments>
</comment>
<comment type="interaction">
    <interactant intactId="EBI-3895873">
        <id>P04637-7</id>
    </interactant>
    <interactant intactId="EBI-351962">
        <id>P17844</id>
        <label>DDX5</label>
    </interactant>
    <organismsDiffer>false</organismsDiffer>
    <experiments>2</experiments>
</comment>
<comment type="subcellular location">
    <subcellularLocation>
        <location evidence="43 73 98 99 129 137 143 150">Cytoplasm</location>
    </subcellularLocation>
    <subcellularLocation>
        <location evidence="43 73 83 91 98 129 143 150">Nucleus</location>
    </subcellularLocation>
    <subcellularLocation>
        <location evidence="15 29 168">Nucleus</location>
        <location evidence="15 29 168">PML body</location>
    </subcellularLocation>
    <subcellularLocation>
        <location evidence="73">Endoplasmic reticulum</location>
    </subcellularLocation>
    <subcellularLocation>
        <location evidence="137 145 152">Mitochondrion matrix</location>
    </subcellularLocation>
    <subcellularLocation>
        <location evidence="155">Cytoplasm</location>
        <location evidence="155">Cytoskeleton</location>
        <location evidence="155">Microtubule organizing center</location>
        <location evidence="155">Centrosome</location>
    </subcellularLocation>
    <text evidence="29 137 143 152">Recruited into PML bodies together with CHEK2 (PubMed:12810724). Translocates to mitochondria upon oxidative stress (PubMed:22726440). Translocates to mitochondria in response to mitomycin C treatment (PubMed:27323408). Competitive inhibition of TP53 interaction with HSPA9/MOT-2 by UBXN2A results in increased protein abundance and subsequent translocation of TP53 to the nucleus (PubMed:24625977).</text>
</comment>
<comment type="subcellular location">
    <molecule>Isoform 1</molecule>
    <subcellularLocation>
        <location evidence="141">Nucleus</location>
    </subcellularLocation>
    <subcellularLocation>
        <location>Cytoplasm</location>
    </subcellularLocation>
    <text>Predominantly nuclear but localizes to the cytoplasm when expressed with isoform 4.</text>
</comment>
<comment type="subcellular location">
    <molecule>Isoform 2</molecule>
    <subcellularLocation>
        <location>Nucleus</location>
    </subcellularLocation>
    <subcellularLocation>
        <location>Cytoplasm</location>
    </subcellularLocation>
    <text>Localized mainly in the nucleus with minor staining in the cytoplasm.</text>
</comment>
<comment type="subcellular location">
    <molecule>Isoform 3</molecule>
    <subcellularLocation>
        <location>Nucleus</location>
    </subcellularLocation>
    <subcellularLocation>
        <location>Cytoplasm</location>
    </subcellularLocation>
    <text>Localized in the nucleus in most cells but found in the cytoplasm in some cells.</text>
</comment>
<comment type="subcellular location">
    <molecule>Isoform 4</molecule>
    <subcellularLocation>
        <location>Nucleus</location>
    </subcellularLocation>
    <subcellularLocation>
        <location>Cytoplasm</location>
    </subcellularLocation>
    <text>Predominantly nuclear but translocates to the cytoplasm following cell stress.</text>
</comment>
<comment type="subcellular location">
    <molecule>Isoform 7</molecule>
    <subcellularLocation>
        <location>Nucleus</location>
    </subcellularLocation>
    <subcellularLocation>
        <location>Cytoplasm</location>
    </subcellularLocation>
    <text>Localized mainly in the nucleus with minor staining in the cytoplasm.</text>
</comment>
<comment type="subcellular location">
    <molecule>Isoform 8</molecule>
    <subcellularLocation>
        <location>Nucleus</location>
    </subcellularLocation>
    <subcellularLocation>
        <location>Cytoplasm</location>
    </subcellularLocation>
    <text>Localized in both nucleus and cytoplasm in most cells. In some cells, forms foci in the nucleus that are different from nucleoli.</text>
</comment>
<comment type="subcellular location">
    <molecule>Isoform 9</molecule>
    <subcellularLocation>
        <location>Cytoplasm</location>
    </subcellularLocation>
</comment>
<comment type="alternative products">
    <event type="alternative promoter"/>
    <event type="alternative splicing"/>
    <isoform>
        <id>P04637-1</id>
        <name>1</name>
        <name>p53</name>
        <name>p53alpha</name>
        <sequence type="displayed"/>
    </isoform>
    <isoform>
        <id>P04637-2</id>
        <name>2</name>
        <name>I9RET</name>
        <name>p53beta</name>
        <sequence type="described" ref="VSP_006535 VSP_006536"/>
    </isoform>
    <isoform>
        <id>P04637-3</id>
        <name>3</name>
        <name>p53gamma</name>
        <sequence type="described" ref="VSP_040560 VSP_040561"/>
    </isoform>
    <isoform>
        <id>P04637-4</id>
        <name>4</name>
        <name>Del40-p53</name>
        <name>Del40-p53alpha</name>
        <name>p47</name>
        <sequence type="described" ref="VSP_040832"/>
    </isoform>
    <isoform>
        <id>P04637-5</id>
        <name>5</name>
        <name>Del40-p53beta</name>
        <sequence type="described" ref="VSP_040832 VSP_006535 VSP_006536"/>
    </isoform>
    <isoform>
        <id>P04637-6</id>
        <name>6</name>
        <name>Del40-p53gamma</name>
        <sequence type="described" ref="VSP_040832 VSP_040560 VSP_040561"/>
    </isoform>
    <isoform>
        <id>P04637-7</id>
        <name>7</name>
        <name>Del133-p53</name>
        <name>Del133-p53alpha</name>
        <sequence type="described" ref="VSP_040833"/>
    </isoform>
    <isoform>
        <id>P04637-8</id>
        <name>8</name>
        <name>Del133-p53beta</name>
        <sequence type="described" ref="VSP_040833 VSP_006535 VSP_006536"/>
    </isoform>
    <isoform>
        <id>P04637-9</id>
        <name>9</name>
        <name>Del133-p53gamma</name>
        <sequence type="described" ref="VSP_040833 VSP_040560 VSP_040561"/>
    </isoform>
</comment>
<comment type="tissue specificity">
    <text evidence="52">Ubiquitous. Isoforms are expressed in a wide range of normal tissues but in a tissue-dependent manner. Isoform 2 is expressed in most normal tissues but is not detected in brain, lung, prostate, muscle, fetal brain, spinal cord and fetal liver. Isoform 3 is expressed in most normal tissues but is not detected in lung, spleen, testis, fetal brain, spinal cord and fetal liver. Isoform 7 is expressed in most normal tissues but is not detected in prostate, uterus, skeletal muscle and breast. Isoform 8 is detected only in colon, bone marrow, testis, fetal brain and intestine. Isoform 9 is expressed in most normal tissues but is not detected in brain, heart, lung, fetal liver, salivary gland, breast or intestine.</text>
</comment>
<comment type="induction">
    <text evidence="7 52">Up-regulated in response to DNA damage. Isoform 2 is not induced in tumor cells in response to stress.</text>
</comment>
<comment type="domain">
    <text evidence="161 167 168 169 170">The N-terminal and C-terminal disordered regions undergo liquid-liquid phase separation (LLPS) following homotetramerization and activation (PubMed:31953488, PubMed:35618207, PubMed:36108750, PubMed:36634798, PubMed:38653238). Post-translational modifications, such as phosphorylation or lactylation affect the ability to undergo LLPS (PubMed:31953488, PubMed:35618207, PubMed:36634798, PubMed:38653238).</text>
</comment>
<comment type="domain">
    <text evidence="82">The nuclear export signal acts as a transcriptional repression domain. The TADI and TADII motifs (residues 17 to 25 and 48 to 56) correspond both to 9aaTAD motifs which are transactivation domains present in a large number of yeast and animal transcription factors.</text>
</comment>
<comment type="PTM">
    <text evidence="10 44 74 109 119 140 157 158">Acetylation of Lys-382 by CREBBP enhances transcriptional activity (PubMed:10656795, PubMed:15448695, PubMed:20228809, PubMed:23431171). Acetylation of Lys-382 by EP300 (PubMed:10656795, PubMed:15448695, PubMed:20228809, PubMed:23431171). Deacetylation of Lys-382 by SIRT1 impairs its ability to induce proapoptotic program and modulate cell senescence (PubMed:10656795, PubMed:15448695, PubMed:20228809, PubMed:23431171). Deacetylation by SIRT2 impairs its ability to induce transcription activation in a AKT-dependent manner (PubMed:10656795, PubMed:15448695, PubMed:20228809, PubMed:23431171, PubMed:29681526). Acetylation at Lys-381 increases stability (PubMed:29474172). Deacetylation at Lys-381 by SIRT6 decreases its stability, thereby regulating cell senescence (PubMed:29474172). Acetylated at Lys-120 by KAT5, KAT6A and KAT8; regulating its ability to induce proapoptotic program (PubMed:17189187, PubMed:19854137, PubMed:23431171).</text>
</comment>
<comment type="PTM">
    <text evidence="170">Lactylation by AARS1 prevents ability to undergo liquid-liquid phase separation (LLPS), thereby inhibiting transcription factor activity.</text>
</comment>
<comment type="PTM">
    <text evidence="1 7 8 12 13 17 18 20 21 22 23 24 29 37 38 51 57 61 68 69 77 80 83 89 90 112 116 125 126 127 133 155 160 180">Phosphorylation on Ser residues mediates transcriptional activation. Phosphorylated by HIPK1 (By similarity). Phosphorylation at Ser-9 by HIPK4 increases repression activity on BIRC5 promoter. Phosphorylated on Thr-18 by VRK1, which may prevent the interaction with MDM2 (PubMed:10951572, PubMed:31527692). Phosphorylated on Ser-20 by CHEK2 in response to DNA damage, which prevents ubiquitination by MDM2. Phosphorylated on Ser-20 by PLK3 in response to reactive oxygen species (ROS), promoting p53/TP53-mediated apoptosis. Phosphorylated on Thr-55 by TAF1, which promotes MDM2-mediated degradation. Phosphorylated on Ser-33 by CDK7 in a CAK complex in response to DNA damage. Phosphorylated on Ser-46 by HIPK2 upon UV irradiation. Phosphorylation on Ser-46 is required for acetylation by CREBBP. Phosphorylated on Ser-392 following UV but not gamma irradiation. Phosphorylated by NUAK1 at Ser-15 and Ser-392; was initially thought to be mediated by STK11/LKB1 but it was later shown that it is indirect and that STK11/LKB1-dependent phosphorylation is probably mediated by downstream NUAK1 (PubMed:21317932). It is unclear whether AMP directly mediates phosphorylation at Ser-15. Phosphorylated on Thr-18 by isoform 1 and isoform 2 of VRK2. Phosphorylation on Thr-18 by isoform 2 of VRK2 results in a reduction in ubiquitination by MDM2 and an increase in acetylation by EP300. Stabilized by CDK5-mediated phosphorylation in response to genotoxic and oxidative stresses at Ser-15, Ser-33 and Ser-46, leading to accumulation of p53/TP53, particularly in the nucleus, thus inducing the transactivation of p53/TP53 target genes. Phosphorylated by DYRK2 at Ser-46 in response to genotoxic stress. Phosphorylated at Ser-315 and Ser-392 by CDK2 in response to DNA-damage. Phosphorylation at Ser-15 is required for interaction with DDX3X and gamma-tubulin (PubMed:28842590). Phosphorylation at Ser-392 regulates its ability to undergo liquid-liquid phase separation by increasing fluidity of TP53/p53 condensates (PubMed:35618207).</text>
</comment>
<comment type="PTM">
    <text>Dephosphorylated by PP2A-PPP2R5C holoenzyme at Thr-55. SV40 small T antigen inhibits the dephosphorylation by the AC form of PP2A.</text>
</comment>
<comment type="PTM">
    <text evidence="175">May be O-glycosylated in the C-terminal basic region. Studied in EB-1 cell line.</text>
</comment>
<comment type="PTM">
    <text evidence="2 11 29 39 43 73 91 99 101 104 105 108 110 114 118 129 147 148 151 154 158">Ubiquitinated by MDM2 and SYVN1, which leads to proteasomal degradation (PubMed:10722742, PubMed:12810724, PubMed:15340061, PubMed:17170702, PubMed:19880522, PubMed:29681526). Ubiquitinated by RFWD3, which works in cooperation with MDM2 and may catalyze the formation of short polyubiquitin chains on p53/TP53 that are not targeted to the proteasome (PubMed:10722742, PubMed:12810724, PubMed:20173098). Ubiquitinated by MKRN1 at Lys-291 and Lys-292, which leads to proteasomal degradation (PubMed:19536131). Deubiquitinated by USP10, leading to its stabilization (PubMed:20096447). Ubiquitinated by TRIM24, RFFL, RNF34 and RNF125, which leads to proteasomal degradation (PubMed:19556538). Ubiquitination by TOPORS induces degradation (PubMed:19473992). Deubiquitination by USP7, leading to stabilization (PubMed:15053880). Isoform 4 is monoubiquitinated in an MDM2-independent manner (PubMed:15340061). Ubiquitinated by COP1, which leads to proteasomal degradation (PubMed:19837670). Ubiquitination and subsequent proteasomal degradation is negatively regulated by CCAR2 (PubMed:25732823). Polyubiquitinated by C10orf90/FATS, polyubiquitination is 'Lys-48'-linkage independent and non-proteolytic, leading to TP53 stabilization (By similarity). Polyubiquitinated by MUL1 at Lys-24 which leads to proteasomal degradation (PubMed:21597459). Deubiquitinated by USP3, leading to stabilization (PubMed:28807825). Ubiquitinated by MSL2, promoting its cytoplasmic localization (PubMed:19033443). Also ubiquitinated by the SCF(FBXO22)-KDMA4A complex; leading to proteasomal degradation (PubMed:26868148).</text>
</comment>
<comment type="PTM">
    <text evidence="46 59 70 84 86 98 115 138">Monomethylated at Lys-372 by SETD7, leading to stabilization and increased transcriptional activation (PubMed:15525938, PubMed:16415881). Monomethylated at Lys-370 by SMYD2, leading to decreased DNA-binding activity and subsequent transcriptional regulation activity (PubMed:17108971). Lys-372 monomethylation prevents interaction with SMYD2 and subsequent monomethylation at Lys-370 (PubMed:17108971). Dimethylated at Lys-373 by EHMT1 and EHMT2 (PubMed:20118233). Monomethylated at Lys-382 by KMT5A, promoting interaction with L3MBTL1 and leading to repress transcriptional activity (PubMed:17707234). Dimethylation at Lys-370 and Lys-382 diminishes p53 ubiquitination, through stabilizing association with the methyl reader PHF20 (PubMed:22864287). Demethylation of dimethylated Lys-370 by KDM1A prevents interaction with TP53BP1 and represses TP53-mediated transcriptional activation (PubMed:17805299). Monomethylated at Arg-333 and dimethylated at Arg-335 and Arg-337 by PRMT5; methylation is increased after DNA damage and might possibly affect TP53 target gene specificity (PubMed:19011621).</text>
</comment>
<comment type="PTM">
    <text evidence="16 133 190">Sumoylated with SUMO1. Sumoylated at Lys-386 by UBC9.</text>
</comment>
<comment type="disease">
    <text>TP53 is found in increased amounts in a wide variety of transformed cells. TP53 is frequently mutated or inactivated in about 60% of cancers. TP53 defects are found in Barrett metaplasia a condition in which the normally stratified squamous epithelium of the lower esophagus is replaced by a metaplastic columnar epithelium. The condition develops as a complication in approximately 10% of patients with chronic gastroesophageal reflux disease and predisposes to the development of esophageal adenocarcinoma.</text>
</comment>
<comment type="disease">
    <disease id="DI-01537">
        <name>Esophageal cancer</name>
        <acronym>ESCR</acronym>
        <description>A malignancy of the esophagus. The most common types are esophageal squamous cell carcinoma and adenocarcinoma. Cancer of the esophagus remains a devastating disease because it is usually not detected until it has progressed to an advanced incurable stage.</description>
        <dbReference type="MIM" id="133239"/>
    </disease>
    <text>The disease is caused by variants affecting the gene represented in this entry.</text>
</comment>
<comment type="disease" evidence="5 47 81 100 107 135 168 172 176 183">
    <disease id="DI-01904">
        <name>Li-Fraumeni syndrome</name>
        <acronym>LFS</acronym>
        <description>An autosomal dominant familial cancer syndrome that in its classic form is defined by the existence of a proband affected by a sarcoma before 45 years with a first degree relative affected by any tumor before 45 years and another first degree relative with any tumor before 45 years or a sarcoma at any age. Other clinical definitions for LFS have been proposed and called Li-Fraumeni like syndrome (LFL). In these families affected relatives develop a diverse set of malignancies at unusually early ages. Four types of cancers account for 80% of tumors occurring in TP53 germline mutation carriers: breast cancers, soft tissue and bone sarcomas, brain tumors (astrocytomas) and adrenocortical carcinomas. Less frequent tumors include choroid plexus carcinoma or papilloma before the age of 15, rhabdomyosarcoma before the age of 5, leukemia, Wilms tumor, malignant phyllodes tumor, colorectal and gastric cancers.</description>
        <dbReference type="MIM" id="151623"/>
    </disease>
    <text>The disease is caused by variants affecting the gene represented in this entry.</text>
</comment>
<comment type="disease">
    <disease id="DI-01696">
        <name>Squamous cell carcinoma of the head and neck</name>
        <acronym>HNSCC</acronym>
        <description>A non-melanoma skin cancer affecting the head and neck. The hallmark of cutaneous SCC is malignant transformation of normal epidermal keratinocytes.</description>
        <dbReference type="MIM" id="275355"/>
    </disease>
    <text>The gene represented in this entry is involved in disease pathogenesis.</text>
</comment>
<comment type="disease">
    <disease id="DI-02205">
        <name>Lung cancer</name>
        <acronym>LNCR</acronym>
        <description>A common malignancy affecting tissues of the lung. The most common form of lung cancer is non-small cell lung cancer (NSCLC) that can be divided into 3 major histologic subtypes: squamous cell carcinoma, adenocarcinoma, and large cell lung cancer. NSCLC is often diagnosed at an advanced stage and has a poor prognosis.</description>
        <dbReference type="MIM" id="211980"/>
    </disease>
    <text>The disease is caused by variants affecting the gene represented in this entry.</text>
</comment>
<comment type="disease" evidence="25">
    <disease id="DI-01346">
        <name>Papilloma of choroid plexus</name>
        <acronym>CPP</acronym>
        <description>A benign tumor of neuroectodermal origin that generally occurs in childhood, but has also been reported in adults. Although generally found within the ventricular system, choroid plexus papillomas can arise ectopically in the brain parenchyma or disseminate throughout the neuraxis. Patients present with signs and symptoms of increased intracranial pressure including headache, hydrocephalus, papilledema, nausea, vomiting, cranial nerve deficits, gait impairment, and seizures.</description>
        <dbReference type="MIM" id="260500"/>
    </disease>
    <text>The disease is caused by variants affecting the gene represented in this entry.</text>
</comment>
<comment type="disease" evidence="19">
    <disease id="DI-02740">
        <name>Adrenocortical carcinoma</name>
        <acronym>ADCC</acronym>
        <description>A malignant neoplasm of the adrenal cortex and a rare childhood tumor. It occurs with increased frequency in patients with Beckwith-Wiedemann syndrome and Li-Fraumeni syndrome.</description>
        <dbReference type="MIM" id="202300"/>
    </disease>
    <text>The disease is caused by variants affecting the gene represented in this entry.</text>
</comment>
<comment type="disease" evidence="131">
    <disease id="DI-03503">
        <name>Basal cell carcinoma 7</name>
        <acronym>BCC7</acronym>
        <description>A common malignant skin neoplasm that typically appears on hair-bearing skin, most commonly on sun-exposed areas. It is slow growing and rarely metastasizes, but has potentialities for local invasion and destruction. It usually develops as a flat, firm, pale area that is small, raised, pink or red, translucent, shiny, and waxy, and the area may bleed following minor injury. Tumor size can vary from a few millimeters to several centimeters in diameter.</description>
        <dbReference type="MIM" id="614740"/>
    </disease>
    <text>Disease susceptibility is associated with variants affecting the gene represented in this entry.</text>
</comment>
<comment type="disease" evidence="159">
    <disease id="DI-05371">
        <name>Bone marrow failure syndrome 5</name>
        <acronym>BMFS5</acronym>
        <description>A form of bone marrow failure syndrome, a heterogeneous group of life-threatening disorders characterized by hematopoietic defects in association with a range of variable extra-hematopoietic manifestations. BMFS5 is an autosomal dominant form characterized by infantile onset of severe red cell anemia requiring transfusion. Additional features include hypogammaglobulinemia, poor growth with microcephaly, developmental delay, and seizures.</description>
        <dbReference type="MIM" id="618165"/>
    </disease>
    <text>The disease is caused by variants affecting the gene represented in this entry.</text>
</comment>
<comment type="miscellaneous">
    <molecule>Isoform 2</molecule>
    <text evidence="192">Expressed in quiescent lymphocytes. Seems to be non-functional. May be produced at very low levels due to a premature stop codon in the mRNA, leading to nonsense-mediated mRNA decay.</text>
</comment>
<comment type="miscellaneous">
    <molecule>Isoform 3</molecule>
    <text evidence="192">Expressed in quiescent lymphocytes. Seems to be non-functional. May be produced at very low levels due to a premature stop codon in the mRNA, leading to nonsense-mediated mRNA decay.</text>
</comment>
<comment type="miscellaneous">
    <molecule>Isoform 7</molecule>
    <text evidence="192">Produced by alternative promoter usage.</text>
</comment>
<comment type="miscellaneous">
    <molecule>Isoform 8</molecule>
    <text evidence="192">Produced by alternative promoter usage and alternative splicing.</text>
</comment>
<comment type="miscellaneous">
    <molecule>Isoform 9</molecule>
    <text evidence="192">Produced by alternative promoter usage and alternative splicing.</text>
</comment>
<comment type="similarity">
    <text evidence="192">Belongs to the p53 family.</text>
</comment>
<comment type="caution">
    <text evidence="2 7 22 43 49 51 53 73 78 83 88 91 98 125 129 137 149 193">Interaction with BANP was reported to enhance phosphorylation on Ser-15 upon ultraviolet irradiation (PubMed:15701641). However, the publication has been retracted due to image duplication and manipulation. Interaction with BANP has been confirmed in mouse studies (By similarity). Phosphorylation at Ser-15 has been confirmed by other studies (PubMed:10570149, PubMed:11554766, PubMed:15866171, PubMed:16219768, PubMed:17317671, PubMed:17954561, PubMed:20959462, PubMed:25772236). Its nuclear and cytoplasmic localization has been confirmed by other studies (PubMed:15340061, PubMed:17170702, PubMed:17591690, PubMed:18206965, PubMed:19011621, PubMed:21597459, PubMed:22726440).</text>
</comment>
<comment type="online information" name="The TP53 Database">
    <link uri="https://tp53.cancer.gov/"/>
</comment>
<comment type="online information" name="Atlas of Genetics and Cytogenetics in Oncology and Haematology">
    <link uri="https://atlasgeneticsoncology.org/gene/88/P53"/>
</comment>
<comment type="online information" name="Wikipedia">
    <link uri="https://en.wikipedia.org/wiki/P53"/>
    <text>P53 entry</text>
</comment>
<comment type="online information" name="Protein Spotlight">
    <link uri="https://www.proteinspotlight.org/back_issues/206/"/>
    <text>On the right track - Issue 206 of August 2018</text>
</comment>
<dbReference type="EMBL" id="X02469">
    <property type="protein sequence ID" value="CAA26306.1"/>
    <property type="molecule type" value="mRNA"/>
</dbReference>
<dbReference type="EMBL" id="M13121">
    <property type="protein sequence ID" value="AAA59987.1"/>
    <property type="molecule type" value="Genomic_DNA"/>
</dbReference>
<dbReference type="EMBL" id="M13112">
    <property type="protein sequence ID" value="AAA59987.1"/>
    <property type="status" value="JOINED"/>
    <property type="molecule type" value="Genomic_DNA"/>
</dbReference>
<dbReference type="EMBL" id="M13113">
    <property type="protein sequence ID" value="AAA59987.1"/>
    <property type="status" value="JOINED"/>
    <property type="molecule type" value="Genomic_DNA"/>
</dbReference>
<dbReference type="EMBL" id="M13114">
    <property type="protein sequence ID" value="AAA59987.1"/>
    <property type="status" value="JOINED"/>
    <property type="molecule type" value="Genomic_DNA"/>
</dbReference>
<dbReference type="EMBL" id="M13115">
    <property type="protein sequence ID" value="AAA59987.1"/>
    <property type="status" value="JOINED"/>
    <property type="molecule type" value="Genomic_DNA"/>
</dbReference>
<dbReference type="EMBL" id="M13116">
    <property type="protein sequence ID" value="AAA59987.1"/>
    <property type="status" value="JOINED"/>
    <property type="molecule type" value="Genomic_DNA"/>
</dbReference>
<dbReference type="EMBL" id="M13117">
    <property type="protein sequence ID" value="AAA59987.1"/>
    <property type="status" value="JOINED"/>
    <property type="molecule type" value="Genomic_DNA"/>
</dbReference>
<dbReference type="EMBL" id="M13118">
    <property type="protein sequence ID" value="AAA59987.1"/>
    <property type="status" value="JOINED"/>
    <property type="molecule type" value="Genomic_DNA"/>
</dbReference>
<dbReference type="EMBL" id="M13119">
    <property type="protein sequence ID" value="AAA59987.1"/>
    <property type="status" value="JOINED"/>
    <property type="molecule type" value="Genomic_DNA"/>
</dbReference>
<dbReference type="EMBL" id="M13120">
    <property type="protein sequence ID" value="AAA59987.1"/>
    <property type="status" value="JOINED"/>
    <property type="molecule type" value="Genomic_DNA"/>
</dbReference>
<dbReference type="EMBL" id="K03199">
    <property type="protein sequence ID" value="AAA59989.1"/>
    <property type="molecule type" value="mRNA"/>
</dbReference>
<dbReference type="EMBL" id="M14694">
    <property type="protein sequence ID" value="AAA61211.1"/>
    <property type="molecule type" value="mRNA"/>
</dbReference>
<dbReference type="EMBL" id="M14695">
    <property type="protein sequence ID" value="AAA61212.1"/>
    <property type="molecule type" value="mRNA"/>
</dbReference>
<dbReference type="EMBL" id="M22898">
    <property type="protein sequence ID" value="AAA59988.1"/>
    <property type="molecule type" value="Genomic_DNA"/>
</dbReference>
<dbReference type="EMBL" id="M22882">
    <property type="protein sequence ID" value="AAA59988.1"/>
    <property type="status" value="JOINED"/>
    <property type="molecule type" value="Genomic_DNA"/>
</dbReference>
<dbReference type="EMBL" id="M22883">
    <property type="protein sequence ID" value="AAA59988.1"/>
    <property type="status" value="JOINED"/>
    <property type="molecule type" value="Genomic_DNA"/>
</dbReference>
<dbReference type="EMBL" id="M22884">
    <property type="protein sequence ID" value="AAA59988.1"/>
    <property type="status" value="JOINED"/>
    <property type="molecule type" value="Genomic_DNA"/>
</dbReference>
<dbReference type="EMBL" id="M22887">
    <property type="protein sequence ID" value="AAA59988.1"/>
    <property type="status" value="JOINED"/>
    <property type="molecule type" value="Genomic_DNA"/>
</dbReference>
<dbReference type="EMBL" id="M22888">
    <property type="protein sequence ID" value="AAA59988.1"/>
    <property type="status" value="JOINED"/>
    <property type="molecule type" value="Genomic_DNA"/>
</dbReference>
<dbReference type="EMBL" id="M22894">
    <property type="protein sequence ID" value="AAA59988.1"/>
    <property type="status" value="JOINED"/>
    <property type="molecule type" value="Genomic_DNA"/>
</dbReference>
<dbReference type="EMBL" id="M22895">
    <property type="protein sequence ID" value="AAA59988.1"/>
    <property type="status" value="JOINED"/>
    <property type="molecule type" value="Genomic_DNA"/>
</dbReference>
<dbReference type="EMBL" id="M22896">
    <property type="protein sequence ID" value="AAA59988.1"/>
    <property type="status" value="JOINED"/>
    <property type="molecule type" value="Genomic_DNA"/>
</dbReference>
<dbReference type="EMBL" id="M22897">
    <property type="protein sequence ID" value="AAA59988.1"/>
    <property type="status" value="JOINED"/>
    <property type="molecule type" value="Genomic_DNA"/>
</dbReference>
<dbReference type="EMBL" id="X01405">
    <property type="protein sequence ID" value="CAA25652.1"/>
    <property type="molecule type" value="mRNA"/>
</dbReference>
<dbReference type="EMBL" id="X60011">
    <property type="protein sequence ID" value="CAA42626.1"/>
    <property type="molecule type" value="mRNA"/>
</dbReference>
<dbReference type="EMBL" id="X60012">
    <property type="protein sequence ID" value="CAA42627.1"/>
    <property type="status" value="ALT_TERM"/>
    <property type="molecule type" value="mRNA"/>
</dbReference>
<dbReference type="EMBL" id="X60013">
    <property type="protein sequence ID" value="CAA42628.1"/>
    <property type="molecule type" value="mRNA"/>
</dbReference>
<dbReference type="EMBL" id="X60014">
    <property type="protein sequence ID" value="CAA42629.1"/>
    <property type="molecule type" value="mRNA"/>
</dbReference>
<dbReference type="EMBL" id="X60015">
    <property type="protein sequence ID" value="CAA42630.1"/>
    <property type="molecule type" value="mRNA"/>
</dbReference>
<dbReference type="EMBL" id="X60016">
    <property type="protein sequence ID" value="CAA42631.1"/>
    <property type="molecule type" value="mRNA"/>
</dbReference>
<dbReference type="EMBL" id="X60017">
    <property type="protein sequence ID" value="CAA42632.1"/>
    <property type="molecule type" value="mRNA"/>
</dbReference>
<dbReference type="EMBL" id="X60018">
    <property type="protein sequence ID" value="CAA42633.1"/>
    <property type="molecule type" value="mRNA"/>
</dbReference>
<dbReference type="EMBL" id="X60019">
    <property type="protein sequence ID" value="CAA42634.1"/>
    <property type="molecule type" value="mRNA"/>
</dbReference>
<dbReference type="EMBL" id="X60020">
    <property type="protein sequence ID" value="CAA42635.1"/>
    <property type="molecule type" value="mRNA"/>
</dbReference>
<dbReference type="EMBL" id="AF307851">
    <property type="protein sequence ID" value="AAG28785.1"/>
    <property type="molecule type" value="mRNA"/>
</dbReference>
<dbReference type="EMBL" id="DQ186648">
    <property type="protein sequence ID" value="ABA29753.1"/>
    <property type="molecule type" value="mRNA"/>
</dbReference>
<dbReference type="EMBL" id="DQ186649">
    <property type="protein sequence ID" value="ABA29754.1"/>
    <property type="molecule type" value="mRNA"/>
</dbReference>
<dbReference type="EMBL" id="DQ186650">
    <property type="protein sequence ID" value="ABA29755.1"/>
    <property type="molecule type" value="mRNA"/>
</dbReference>
<dbReference type="EMBL" id="DQ186651">
    <property type="protein sequence ID" value="ABA29756.1"/>
    <property type="molecule type" value="mRNA"/>
</dbReference>
<dbReference type="EMBL" id="DQ186652">
    <property type="protein sequence ID" value="ABA29757.1"/>
    <property type="molecule type" value="mRNA"/>
</dbReference>
<dbReference type="EMBL" id="DQ191317">
    <property type="protein sequence ID" value="ABB80262.1"/>
    <property type="molecule type" value="mRNA"/>
</dbReference>
<dbReference type="EMBL" id="DQ286964">
    <property type="protein sequence ID" value="ABB80266.1"/>
    <property type="molecule type" value="mRNA"/>
</dbReference>
<dbReference type="EMBL" id="X54156">
    <property type="protein sequence ID" value="CAA38095.1"/>
    <property type="molecule type" value="Genomic_DNA"/>
</dbReference>
<dbReference type="EMBL" id="U94788">
    <property type="protein sequence ID" value="AAC12971.1"/>
    <property type="molecule type" value="Genomic_DNA"/>
</dbReference>
<dbReference type="EMBL" id="AY838896">
    <property type="protein sequence ID" value="AAV80424.1"/>
    <property type="molecule type" value="Genomic_DNA"/>
</dbReference>
<dbReference type="EMBL" id="AF135121">
    <property type="protein sequence ID" value="AAD28535.1"/>
    <property type="molecule type" value="Genomic_DNA"/>
</dbReference>
<dbReference type="EMBL" id="AF135120">
    <property type="protein sequence ID" value="AAD28535.1"/>
    <property type="status" value="JOINED"/>
    <property type="molecule type" value="Genomic_DNA"/>
</dbReference>
<dbReference type="EMBL" id="AF136271">
    <property type="protein sequence ID" value="AAD28628.1"/>
    <property type="molecule type" value="Genomic_DNA"/>
</dbReference>
<dbReference type="EMBL" id="AF136270">
    <property type="protein sequence ID" value="AAD28628.1"/>
    <property type="status" value="JOINED"/>
    <property type="molecule type" value="Genomic_DNA"/>
</dbReference>
<dbReference type="EMBL" id="AB082923">
    <property type="protein sequence ID" value="BAC16799.1"/>
    <property type="molecule type" value="mRNA"/>
</dbReference>
<dbReference type="EMBL" id="AK312568">
    <property type="protein sequence ID" value="BAG35463.1"/>
    <property type="molecule type" value="mRNA"/>
</dbReference>
<dbReference type="EMBL" id="AC007421">
    <property type="status" value="NOT_ANNOTATED_CDS"/>
    <property type="molecule type" value="Genomic_DNA"/>
</dbReference>
<dbReference type="EMBL" id="AC087388">
    <property type="status" value="NOT_ANNOTATED_CDS"/>
    <property type="molecule type" value="Genomic_DNA"/>
</dbReference>
<dbReference type="EMBL" id="CH471108">
    <property type="protein sequence ID" value="EAW90143.1"/>
    <property type="molecule type" value="Genomic_DNA"/>
</dbReference>
<dbReference type="EMBL" id="CH471108">
    <property type="protein sequence ID" value="EAW90144.1"/>
    <property type="molecule type" value="Genomic_DNA"/>
</dbReference>
<dbReference type="EMBL" id="BC003596">
    <property type="protein sequence ID" value="AAH03596.1"/>
    <property type="molecule type" value="mRNA"/>
</dbReference>
<dbReference type="EMBL" id="AY429684">
    <property type="protein sequence ID" value="AAR10356.1"/>
    <property type="molecule type" value="mRNA"/>
</dbReference>
<dbReference type="EMBL" id="AY390341">
    <property type="protein sequence ID" value="AAQ90158.1"/>
    <property type="molecule type" value="Genomic_DNA"/>
</dbReference>
<dbReference type="EMBL" id="AY359814">
    <property type="protein sequence ID" value="AAR13239.1"/>
    <property type="molecule type" value="Genomic_DNA"/>
</dbReference>
<dbReference type="EMBL" id="U63714">
    <property type="protein sequence ID" value="AAB39322.1"/>
    <property type="molecule type" value="Genomic_DNA"/>
</dbReference>
<dbReference type="EMBL" id="AF209136">
    <property type="protein sequence ID" value="AAF36362.1"/>
    <property type="molecule type" value="Genomic_DNA"/>
</dbReference>
<dbReference type="EMBL" id="AF209128">
    <property type="protein sequence ID" value="AAF36354.1"/>
    <property type="molecule type" value="Genomic_DNA"/>
</dbReference>
<dbReference type="EMBL" id="AF209129">
    <property type="protein sequence ID" value="AAF36355.1"/>
    <property type="molecule type" value="Genomic_DNA"/>
</dbReference>
<dbReference type="EMBL" id="AF209130">
    <property type="protein sequence ID" value="AAF36356.1"/>
    <property type="molecule type" value="Genomic_DNA"/>
</dbReference>
<dbReference type="EMBL" id="AF209131">
    <property type="protein sequence ID" value="AAF36357.1"/>
    <property type="molecule type" value="Genomic_DNA"/>
</dbReference>
<dbReference type="EMBL" id="AF209132">
    <property type="protein sequence ID" value="AAF36358.1"/>
    <property type="molecule type" value="Genomic_DNA"/>
</dbReference>
<dbReference type="EMBL" id="AF209133">
    <property type="protein sequence ID" value="AAF36359.1"/>
    <property type="molecule type" value="Genomic_DNA"/>
</dbReference>
<dbReference type="EMBL" id="AF209134">
    <property type="protein sequence ID" value="AAF36360.1"/>
    <property type="molecule type" value="Genomic_DNA"/>
</dbReference>
<dbReference type="EMBL" id="AF209135">
    <property type="protein sequence ID" value="AAF36361.1"/>
    <property type="molecule type" value="Genomic_DNA"/>
</dbReference>
<dbReference type="EMBL" id="AF209148">
    <property type="protein sequence ID" value="AAF36374.1"/>
    <property type="molecule type" value="Genomic_DNA"/>
</dbReference>
<dbReference type="EMBL" id="AF209149">
    <property type="protein sequence ID" value="AAF36375.1"/>
    <property type="molecule type" value="Genomic_DNA"/>
</dbReference>
<dbReference type="EMBL" id="AF209150">
    <property type="protein sequence ID" value="AAF36376.1"/>
    <property type="molecule type" value="Genomic_DNA"/>
</dbReference>
<dbReference type="EMBL" id="AF209151">
    <property type="protein sequence ID" value="AAF36377.1"/>
    <property type="molecule type" value="Genomic_DNA"/>
</dbReference>
<dbReference type="EMBL" id="AF209152">
    <property type="protein sequence ID" value="AAF36378.1"/>
    <property type="molecule type" value="Genomic_DNA"/>
</dbReference>
<dbReference type="EMBL" id="AF209153">
    <property type="protein sequence ID" value="AAF36379.1"/>
    <property type="molecule type" value="Genomic_DNA"/>
</dbReference>
<dbReference type="EMBL" id="AF209154">
    <property type="protein sequence ID" value="AAF36380.1"/>
    <property type="molecule type" value="Genomic_DNA"/>
</dbReference>
<dbReference type="EMBL" id="AF209155">
    <property type="protein sequence ID" value="AAF36381.1"/>
    <property type="molecule type" value="Genomic_DNA"/>
</dbReference>
<dbReference type="EMBL" id="AF209156">
    <property type="protein sequence ID" value="AAF36382.1"/>
    <property type="molecule type" value="Genomic_DNA"/>
</dbReference>
<dbReference type="EMBL" id="AF210309">
    <property type="protein sequence ID" value="AAF63442.1"/>
    <property type="molecule type" value="Genomic_DNA"/>
</dbReference>
<dbReference type="EMBL" id="AF210308">
    <property type="protein sequence ID" value="AAF63442.1"/>
    <property type="status" value="JOINED"/>
    <property type="molecule type" value="Genomic_DNA"/>
</dbReference>
<dbReference type="EMBL" id="AF210310">
    <property type="protein sequence ID" value="AAF63443.1"/>
    <property type="molecule type" value="Genomic_DNA"/>
</dbReference>
<dbReference type="EMBL" id="AF240684">
    <property type="protein sequence ID" value="AAK76358.1"/>
    <property type="molecule type" value="Genomic_DNA"/>
</dbReference>
<dbReference type="EMBL" id="AF240685">
    <property type="protein sequence ID" value="AAK76359.1"/>
    <property type="molecule type" value="Genomic_DNA"/>
</dbReference>
<dbReference type="EMBL" id="AY270155">
    <property type="protein sequence ID" value="AAP30003.1"/>
    <property type="molecule type" value="Genomic_DNA"/>
</dbReference>
<dbReference type="CCDS" id="CCDS11118.1">
    <molecule id="P04637-1"/>
</dbReference>
<dbReference type="CCDS" id="CCDS45605.1">
    <molecule id="P04637-3"/>
</dbReference>
<dbReference type="CCDS" id="CCDS45606.1">
    <molecule id="P04637-2"/>
</dbReference>
<dbReference type="CCDS" id="CCDS73966.1">
    <molecule id="P04637-7"/>
</dbReference>
<dbReference type="CCDS" id="CCDS73967.1">
    <molecule id="P04637-9"/>
</dbReference>
<dbReference type="CCDS" id="CCDS73968.1">
    <molecule id="P04637-8"/>
</dbReference>
<dbReference type="CCDS" id="CCDS73969.1">
    <molecule id="P04637-4"/>
</dbReference>
<dbReference type="CCDS" id="CCDS73970.1">
    <molecule id="P04637-6"/>
</dbReference>
<dbReference type="CCDS" id="CCDS73971.1">
    <molecule id="P04637-5"/>
</dbReference>
<dbReference type="PIR" id="A25224">
    <property type="entry name" value="DNHU53"/>
</dbReference>
<dbReference type="RefSeq" id="NP_000537.3">
    <molecule id="P04637-1"/>
    <property type="nucleotide sequence ID" value="NM_000546.5"/>
</dbReference>
<dbReference type="RefSeq" id="NP_001119584.1">
    <molecule id="P04637-1"/>
    <property type="nucleotide sequence ID" value="NM_001126112.3"/>
</dbReference>
<dbReference type="RefSeq" id="NP_001119585.1">
    <molecule id="P04637-3"/>
    <property type="nucleotide sequence ID" value="NM_001126113.3"/>
</dbReference>
<dbReference type="RefSeq" id="NP_001119586.1">
    <molecule id="P04637-2"/>
    <property type="nucleotide sequence ID" value="NM_001126114.3"/>
</dbReference>
<dbReference type="RefSeq" id="NP_001119587.1">
    <molecule id="P04637-7"/>
    <property type="nucleotide sequence ID" value="NM_001126115.2"/>
</dbReference>
<dbReference type="RefSeq" id="NP_001119588.1">
    <molecule id="P04637-8"/>
    <property type="nucleotide sequence ID" value="NM_001126116.2"/>
</dbReference>
<dbReference type="RefSeq" id="NP_001119589.1">
    <molecule id="P04637-9"/>
    <property type="nucleotide sequence ID" value="NM_001126117.2"/>
</dbReference>
<dbReference type="RefSeq" id="NP_001119590.1">
    <molecule id="P04637-4"/>
    <property type="nucleotide sequence ID" value="NM_001126118.2"/>
</dbReference>
<dbReference type="RefSeq" id="NP_001263624.1">
    <molecule id="P04637-6"/>
    <property type="nucleotide sequence ID" value="NM_001276695.3"/>
</dbReference>
<dbReference type="RefSeq" id="NP_001263625.1">
    <molecule id="P04637-5"/>
    <property type="nucleotide sequence ID" value="NM_001276696.3"/>
</dbReference>
<dbReference type="RefSeq" id="NP_001263626.1">
    <property type="nucleotide sequence ID" value="NM_001276697.1"/>
</dbReference>
<dbReference type="RefSeq" id="NP_001263627.1">
    <property type="nucleotide sequence ID" value="NM_001276698.1"/>
</dbReference>
<dbReference type="RefSeq" id="NP_001263628.1">
    <property type="nucleotide sequence ID" value="NM_001276699.1"/>
</dbReference>
<dbReference type="RefSeq" id="NP_001263689.1">
    <molecule id="P04637-4"/>
    <property type="nucleotide sequence ID" value="NM_001276760.3"/>
</dbReference>
<dbReference type="RefSeq" id="NP_001263690.1">
    <molecule id="P04637-4"/>
    <property type="nucleotide sequence ID" value="NM_001276761.3"/>
</dbReference>
<dbReference type="RefSeq" id="NP_001394191.1">
    <molecule id="P04637-1"/>
    <property type="nucleotide sequence ID" value="NM_001407262.1"/>
</dbReference>
<dbReference type="RefSeq" id="NP_001394192.1">
    <molecule id="P04637-4"/>
    <property type="nucleotide sequence ID" value="NM_001407263.1"/>
</dbReference>
<dbReference type="RefSeq" id="NP_001394193.1">
    <molecule id="P04637-1"/>
    <property type="nucleotide sequence ID" value="NM_001407264.1"/>
</dbReference>
<dbReference type="RefSeq" id="NP_001394194.1">
    <molecule id="P04637-4"/>
    <property type="nucleotide sequence ID" value="NM_001407265.1"/>
</dbReference>
<dbReference type="RefSeq" id="NP_001394195.1">
    <molecule id="P04637-1"/>
    <property type="nucleotide sequence ID" value="NM_001407266.1"/>
</dbReference>
<dbReference type="RefSeq" id="NP_001394196.1">
    <molecule id="P04637-4"/>
    <property type="nucleotide sequence ID" value="NM_001407267.1"/>
</dbReference>
<dbReference type="RefSeq" id="NP_001394197.1">
    <molecule id="P04637-2"/>
    <property type="nucleotide sequence ID" value="NM_001407268.1"/>
</dbReference>
<dbReference type="RefSeq" id="NP_001394198.1">
    <molecule id="P04637-5"/>
    <property type="nucleotide sequence ID" value="NM_001407269.1"/>
</dbReference>
<dbReference type="RefSeq" id="NP_001394199.1">
    <molecule id="P04637-2"/>
    <property type="nucleotide sequence ID" value="NM_001407270.1"/>
</dbReference>
<dbReference type="RefSeq" id="NP_001394200.1">
    <molecule id="P04637-5"/>
    <property type="nucleotide sequence ID" value="NM_001407271.1"/>
</dbReference>
<dbReference type="PDB" id="1A1U">
    <property type="method" value="NMR"/>
    <property type="chains" value="A/C=324-358"/>
</dbReference>
<dbReference type="PDB" id="1AIE">
    <property type="method" value="X-ray"/>
    <property type="resolution" value="1.50 A"/>
    <property type="chains" value="A=326-356"/>
</dbReference>
<dbReference type="PDB" id="1C26">
    <property type="method" value="X-ray"/>
    <property type="resolution" value="1.70 A"/>
    <property type="chains" value="A=325-356"/>
</dbReference>
<dbReference type="PDB" id="1DT7">
    <property type="method" value="NMR"/>
    <property type="chains" value="X/Y=367-388"/>
</dbReference>
<dbReference type="PDB" id="1GZH">
    <property type="method" value="X-ray"/>
    <property type="resolution" value="2.60 A"/>
    <property type="chains" value="A/C=95-292"/>
</dbReference>
<dbReference type="PDB" id="1H26">
    <property type="method" value="X-ray"/>
    <property type="resolution" value="2.24 A"/>
    <property type="chains" value="E=376-386"/>
</dbReference>
<dbReference type="PDB" id="1HS5">
    <property type="method" value="NMR"/>
    <property type="chains" value="A/B=324-357"/>
</dbReference>
<dbReference type="PDB" id="1JSP">
    <property type="method" value="NMR"/>
    <property type="chains" value="A=367-386"/>
</dbReference>
<dbReference type="PDB" id="1KZY">
    <property type="method" value="X-ray"/>
    <property type="resolution" value="2.50 A"/>
    <property type="chains" value="A/B=95-289"/>
</dbReference>
<dbReference type="PDB" id="1MA3">
    <property type="method" value="X-ray"/>
    <property type="resolution" value="2.00 A"/>
    <property type="chains" value="B=372-389"/>
</dbReference>
<dbReference type="PDB" id="1OLG">
    <property type="method" value="NMR"/>
    <property type="chains" value="A/B/C/D=319-360"/>
</dbReference>
<dbReference type="PDB" id="1OLH">
    <property type="method" value="NMR"/>
    <property type="chains" value="A/B/C/D=319-360"/>
</dbReference>
<dbReference type="PDB" id="1PES">
    <property type="method" value="NMR"/>
    <property type="chains" value="A/B/C/D=325-355"/>
</dbReference>
<dbReference type="PDB" id="1PET">
    <property type="method" value="NMR"/>
    <property type="chains" value="A/B/C/D=325-355"/>
</dbReference>
<dbReference type="PDB" id="1SAE">
    <property type="method" value="NMR"/>
    <property type="chains" value="A/B/C/D=319-360"/>
</dbReference>
<dbReference type="PDB" id="1SAF">
    <property type="method" value="NMR"/>
    <property type="chains" value="A/B/C/D=319-360"/>
</dbReference>
<dbReference type="PDB" id="1SAK">
    <property type="method" value="NMR"/>
    <property type="chains" value="A/B/C/D=319-360"/>
</dbReference>
<dbReference type="PDB" id="1SAL">
    <property type="method" value="NMR"/>
    <property type="chains" value="A/B/C/D=319-360"/>
</dbReference>
<dbReference type="PDB" id="1TSR">
    <property type="method" value="X-ray"/>
    <property type="resolution" value="2.20 A"/>
    <property type="chains" value="A/B/C=94-312"/>
</dbReference>
<dbReference type="PDB" id="1TUP">
    <property type="method" value="X-ray"/>
    <property type="resolution" value="2.20 A"/>
    <property type="chains" value="A/B/C=94-312"/>
</dbReference>
<dbReference type="PDB" id="1UOL">
    <property type="method" value="X-ray"/>
    <property type="resolution" value="1.90 A"/>
    <property type="chains" value="A/B=94-312"/>
</dbReference>
<dbReference type="PDB" id="1XQH">
    <property type="method" value="X-ray"/>
    <property type="resolution" value="1.75 A"/>
    <property type="chains" value="B/F=369-377"/>
</dbReference>
<dbReference type="PDB" id="1YC5">
    <property type="method" value="X-ray"/>
    <property type="resolution" value="1.40 A"/>
    <property type="chains" value="B=372-389"/>
</dbReference>
<dbReference type="PDB" id="1YCQ">
    <property type="method" value="X-ray"/>
    <property type="resolution" value="2.30 A"/>
    <property type="chains" value="B=13-29"/>
</dbReference>
<dbReference type="PDB" id="1YCR">
    <property type="method" value="X-ray"/>
    <property type="resolution" value="2.60 A"/>
    <property type="chains" value="B=15-29"/>
</dbReference>
<dbReference type="PDB" id="1YCS">
    <property type="method" value="X-ray"/>
    <property type="resolution" value="2.20 A"/>
    <property type="chains" value="A=94-292"/>
</dbReference>
<dbReference type="PDB" id="2AC0">
    <property type="method" value="X-ray"/>
    <property type="resolution" value="1.80 A"/>
    <property type="chains" value="A/B/C/D=94-293"/>
</dbReference>
<dbReference type="PDB" id="2ADY">
    <property type="method" value="X-ray"/>
    <property type="resolution" value="2.50 A"/>
    <property type="chains" value="A/B=94-293"/>
</dbReference>
<dbReference type="PDB" id="2AHI">
    <property type="method" value="X-ray"/>
    <property type="resolution" value="1.85 A"/>
    <property type="chains" value="A/B/C/D=94-293"/>
</dbReference>
<dbReference type="PDB" id="2ATA">
    <property type="method" value="X-ray"/>
    <property type="resolution" value="2.20 A"/>
    <property type="chains" value="A/B/C/D=94-293"/>
</dbReference>
<dbReference type="PDB" id="2B3G">
    <property type="method" value="X-ray"/>
    <property type="resolution" value="1.60 A"/>
    <property type="chains" value="B=33-60"/>
</dbReference>
<dbReference type="PDB" id="2BIM">
    <property type="method" value="X-ray"/>
    <property type="resolution" value="1.98 A"/>
    <property type="chains" value="A/B=94-312"/>
</dbReference>
<dbReference type="PDB" id="2BIN">
    <property type="method" value="X-ray"/>
    <property type="resolution" value="1.90 A"/>
    <property type="chains" value="A=94-312"/>
</dbReference>
<dbReference type="PDB" id="2BIO">
    <property type="method" value="X-ray"/>
    <property type="resolution" value="1.90 A"/>
    <property type="chains" value="A=94-312"/>
</dbReference>
<dbReference type="PDB" id="2BIP">
    <property type="method" value="X-ray"/>
    <property type="resolution" value="1.80 A"/>
    <property type="chains" value="A=94-312"/>
</dbReference>
<dbReference type="PDB" id="2BIQ">
    <property type="method" value="X-ray"/>
    <property type="resolution" value="1.80 A"/>
    <property type="chains" value="A=94-312"/>
</dbReference>
<dbReference type="PDB" id="2F1X">
    <property type="method" value="X-ray"/>
    <property type="resolution" value="2.30 A"/>
    <property type="chains" value="A/B=359-368"/>
</dbReference>
<dbReference type="PDB" id="2FEJ">
    <property type="method" value="NMR"/>
    <property type="chains" value="A=94-297"/>
</dbReference>
<dbReference type="PDB" id="2FOJ">
    <property type="method" value="X-ray"/>
    <property type="resolution" value="1.60 A"/>
    <property type="chains" value="B=361-367"/>
</dbReference>
<dbReference type="PDB" id="2FOO">
    <property type="method" value="X-ray"/>
    <property type="resolution" value="2.20 A"/>
    <property type="chains" value="B=358-363"/>
</dbReference>
<dbReference type="PDB" id="2GS0">
    <property type="method" value="NMR"/>
    <property type="chains" value="B=20-73"/>
</dbReference>
<dbReference type="PDB" id="2H1L">
    <property type="method" value="X-ray"/>
    <property type="resolution" value="3.16 A"/>
    <property type="chains" value="M/N/O/P/Q/R/S/T/U/V/W/X=92-292"/>
</dbReference>
<dbReference type="PDB" id="2H2D">
    <property type="method" value="X-ray"/>
    <property type="resolution" value="1.70 A"/>
    <property type="chains" value="B=372-389"/>
</dbReference>
<dbReference type="PDB" id="2H2F">
    <property type="method" value="X-ray"/>
    <property type="resolution" value="2.20 A"/>
    <property type="chains" value="B=372-389"/>
</dbReference>
<dbReference type="PDB" id="2H4F">
    <property type="method" value="X-ray"/>
    <property type="resolution" value="2.00 A"/>
    <property type="chains" value="D=372-389"/>
</dbReference>
<dbReference type="PDB" id="2H4H">
    <property type="method" value="X-ray"/>
    <property type="resolution" value="1.99 A"/>
    <property type="chains" value="B=372-389"/>
</dbReference>
<dbReference type="PDB" id="2H4J">
    <property type="method" value="X-ray"/>
    <property type="resolution" value="2.10 A"/>
    <property type="chains" value="D=372-389"/>
</dbReference>
<dbReference type="PDB" id="2H59">
    <property type="method" value="X-ray"/>
    <property type="resolution" value="1.90 A"/>
    <property type="chains" value="D/E=372-389"/>
</dbReference>
<dbReference type="PDB" id="2J0Z">
    <property type="method" value="NMR"/>
    <property type="chains" value="A/B/C/D=326-356"/>
</dbReference>
<dbReference type="PDB" id="2J10">
    <property type="method" value="NMR"/>
    <property type="chains" value="A/B/C/D=326-356"/>
</dbReference>
<dbReference type="PDB" id="2J11">
    <property type="method" value="NMR"/>
    <property type="chains" value="A/B/C/D=326-356"/>
</dbReference>
<dbReference type="PDB" id="2J1W">
    <property type="method" value="X-ray"/>
    <property type="resolution" value="1.80 A"/>
    <property type="chains" value="A/B=94-312"/>
</dbReference>
<dbReference type="PDB" id="2J1X">
    <property type="method" value="X-ray"/>
    <property type="resolution" value="1.65 A"/>
    <property type="chains" value="A/B=94-312"/>
</dbReference>
<dbReference type="PDB" id="2J1Y">
    <property type="method" value="X-ray"/>
    <property type="resolution" value="1.69 A"/>
    <property type="chains" value="A/B/C/D=94-293"/>
</dbReference>
<dbReference type="PDB" id="2J1Z">
    <property type="method" value="X-ray"/>
    <property type="resolution" value="1.80 A"/>
    <property type="chains" value="A/B=94-312"/>
</dbReference>
<dbReference type="PDB" id="2J20">
    <property type="method" value="X-ray"/>
    <property type="resolution" value="1.80 A"/>
    <property type="chains" value="A/B=94-312"/>
</dbReference>
<dbReference type="PDB" id="2J21">
    <property type="method" value="X-ray"/>
    <property type="resolution" value="1.60 A"/>
    <property type="chains" value="A/B=94-312"/>
</dbReference>
<dbReference type="PDB" id="2K8F">
    <property type="method" value="NMR"/>
    <property type="chains" value="B=1-39"/>
</dbReference>
<dbReference type="PDB" id="2L14">
    <property type="method" value="NMR"/>
    <property type="chains" value="B=13-61"/>
</dbReference>
<dbReference type="PDB" id="2LY4">
    <property type="method" value="NMR"/>
    <property type="chains" value="B=1-93"/>
</dbReference>
<dbReference type="PDB" id="2MEJ">
    <property type="method" value="NMR"/>
    <property type="chains" value="B=96-312"/>
</dbReference>
<dbReference type="PDB" id="2MWO">
    <property type="method" value="NMR"/>
    <property type="chains" value="B=363-377"/>
</dbReference>
<dbReference type="PDB" id="2MWP">
    <property type="method" value="NMR"/>
    <property type="chains" value="B=376-387"/>
</dbReference>
<dbReference type="PDB" id="2MWY">
    <property type="method" value="NMR"/>
    <property type="chains" value="B=15-29"/>
</dbReference>
<dbReference type="PDB" id="2MZD">
    <property type="method" value="NMR"/>
    <property type="chains" value="B=35-59"/>
</dbReference>
<dbReference type="PDB" id="2OCJ">
    <property type="method" value="X-ray"/>
    <property type="resolution" value="2.05 A"/>
    <property type="chains" value="A/B/C/D=94-312"/>
</dbReference>
<dbReference type="PDB" id="2PCX">
    <property type="method" value="X-ray"/>
    <property type="resolution" value="1.54 A"/>
    <property type="chains" value="A=94-292"/>
</dbReference>
<dbReference type="PDB" id="2RUK">
    <property type="method" value="NMR"/>
    <property type="chains" value="A=41-62"/>
</dbReference>
<dbReference type="PDB" id="2VUK">
    <property type="method" value="X-ray"/>
    <property type="resolution" value="1.50 A"/>
    <property type="chains" value="A/B=94-312"/>
</dbReference>
<dbReference type="PDB" id="2WGX">
    <property type="method" value="X-ray"/>
    <property type="resolution" value="1.75 A"/>
    <property type="chains" value="A/B=94-312"/>
</dbReference>
<dbReference type="PDB" id="2X0U">
    <property type="method" value="X-ray"/>
    <property type="resolution" value="1.60 A"/>
    <property type="chains" value="A/B=94-312"/>
</dbReference>
<dbReference type="PDB" id="2X0V">
    <property type="method" value="X-ray"/>
    <property type="resolution" value="1.80 A"/>
    <property type="chains" value="A/B=94-312"/>
</dbReference>
<dbReference type="PDB" id="2X0W">
    <property type="method" value="X-ray"/>
    <property type="resolution" value="2.10 A"/>
    <property type="chains" value="A/B=94-312"/>
</dbReference>
<dbReference type="PDB" id="2XWR">
    <property type="method" value="X-ray"/>
    <property type="resolution" value="1.68 A"/>
    <property type="chains" value="A/B=89-293"/>
</dbReference>
<dbReference type="PDB" id="2YBG">
    <property type="method" value="X-ray"/>
    <property type="resolution" value="1.90 A"/>
    <property type="chains" value="A/B/C/D=94-293"/>
</dbReference>
<dbReference type="PDB" id="2YDR">
    <property type="method" value="X-ray"/>
    <property type="resolution" value="2.75 A"/>
    <property type="chains" value="P=144-154"/>
</dbReference>
<dbReference type="PDB" id="2Z5S">
    <property type="method" value="X-ray"/>
    <property type="resolution" value="2.30 A"/>
    <property type="chains" value="P/Q/R=15-29"/>
</dbReference>
<dbReference type="PDB" id="2Z5T">
    <property type="method" value="X-ray"/>
    <property type="resolution" value="2.30 A"/>
    <property type="chains" value="P/Q/R=15-29"/>
</dbReference>
<dbReference type="PDB" id="3D05">
    <property type="method" value="X-ray"/>
    <property type="resolution" value="1.70 A"/>
    <property type="chains" value="A=94-293"/>
</dbReference>
<dbReference type="PDB" id="3D06">
    <property type="method" value="X-ray"/>
    <property type="resolution" value="1.20 A"/>
    <property type="chains" value="A=94-293"/>
</dbReference>
<dbReference type="PDB" id="3D07">
    <property type="method" value="X-ray"/>
    <property type="resolution" value="2.20 A"/>
    <property type="chains" value="A/B=94-293"/>
</dbReference>
<dbReference type="PDB" id="3D08">
    <property type="method" value="X-ray"/>
    <property type="resolution" value="1.40 A"/>
    <property type="chains" value="A=94-293"/>
</dbReference>
<dbReference type="PDB" id="3D09">
    <property type="method" value="X-ray"/>
    <property type="resolution" value="1.90 A"/>
    <property type="chains" value="A=94-293"/>
</dbReference>
<dbReference type="PDB" id="3D0A">
    <property type="method" value="X-ray"/>
    <property type="resolution" value="1.80 A"/>
    <property type="chains" value="A/B/C/D=94-293"/>
</dbReference>
<dbReference type="PDB" id="3DAB">
    <property type="method" value="X-ray"/>
    <property type="resolution" value="1.90 A"/>
    <property type="chains" value="B/D/F/H=15-29"/>
</dbReference>
<dbReference type="PDB" id="3DAC">
    <property type="method" value="X-ray"/>
    <property type="resolution" value="1.80 A"/>
    <property type="chains" value="B/P=17-37"/>
</dbReference>
<dbReference type="PDB" id="3IGK">
    <property type="method" value="X-ray"/>
    <property type="resolution" value="1.70 A"/>
    <property type="chains" value="A=94-293"/>
</dbReference>
<dbReference type="PDB" id="3IGL">
    <property type="method" value="X-ray"/>
    <property type="resolution" value="1.80 A"/>
    <property type="chains" value="A=94-293"/>
</dbReference>
<dbReference type="PDB" id="3KMD">
    <property type="method" value="X-ray"/>
    <property type="resolution" value="2.15 A"/>
    <property type="chains" value="A/B/C/D=92-291"/>
</dbReference>
<dbReference type="PDB" id="3KZ8">
    <property type="method" value="X-ray"/>
    <property type="resolution" value="1.91 A"/>
    <property type="chains" value="A/B=94-293"/>
</dbReference>
<dbReference type="PDB" id="3LW1">
    <property type="method" value="X-ray"/>
    <property type="resolution" value="1.28 A"/>
    <property type="chains" value="P=385-393"/>
</dbReference>
<dbReference type="PDB" id="3OQ5">
    <property type="method" value="X-ray"/>
    <property type="resolution" value="2.50 A"/>
    <property type="chains" value="D/E=377-386"/>
</dbReference>
<dbReference type="PDB" id="3PDH">
    <property type="method" value="X-ray"/>
    <property type="resolution" value="1.80 A"/>
    <property type="chains" value="D=372-389"/>
</dbReference>
<dbReference type="PDB" id="3Q01">
    <property type="method" value="X-ray"/>
    <property type="resolution" value="2.10 A"/>
    <property type="chains" value="A/B=94-356"/>
</dbReference>
<dbReference type="PDB" id="3Q05">
    <property type="method" value="X-ray"/>
    <property type="resolution" value="2.40 A"/>
    <property type="chains" value="A/B/C/D=94-356"/>
</dbReference>
<dbReference type="PDB" id="3Q06">
    <property type="method" value="X-ray"/>
    <property type="resolution" value="3.20 A"/>
    <property type="chains" value="A/B/C/D=96-354"/>
</dbReference>
<dbReference type="PDB" id="3SAK">
    <property type="method" value="NMR"/>
    <property type="chains" value="A/B/C/D=319-360"/>
</dbReference>
<dbReference type="PDB" id="3TG5">
    <property type="method" value="X-ray"/>
    <property type="resolution" value="2.30 A"/>
    <property type="chains" value="B=365-375"/>
</dbReference>
<dbReference type="PDB" id="3TS8">
    <property type="method" value="X-ray"/>
    <property type="resolution" value="2.80 A"/>
    <property type="chains" value="A/B/C/D=94-356"/>
</dbReference>
<dbReference type="PDB" id="3ZME">
    <property type="method" value="X-ray"/>
    <property type="resolution" value="1.35 A"/>
    <property type="chains" value="A/B=94-312"/>
</dbReference>
<dbReference type="PDB" id="4AGL">
    <property type="method" value="X-ray"/>
    <property type="resolution" value="1.70 A"/>
    <property type="chains" value="A/B=94-312"/>
</dbReference>
<dbReference type="PDB" id="4AGM">
    <property type="method" value="X-ray"/>
    <property type="resolution" value="1.52 A"/>
    <property type="chains" value="A/B=94-312"/>
</dbReference>
<dbReference type="PDB" id="4AGN">
    <property type="method" value="X-ray"/>
    <property type="resolution" value="1.60 A"/>
    <property type="chains" value="A/B=94-312"/>
</dbReference>
<dbReference type="PDB" id="4AGO">
    <property type="method" value="X-ray"/>
    <property type="resolution" value="1.45 A"/>
    <property type="chains" value="A/B=94-312"/>
</dbReference>
<dbReference type="PDB" id="4AGP">
    <property type="method" value="X-ray"/>
    <property type="resolution" value="1.50 A"/>
    <property type="chains" value="A/B=94-312"/>
</dbReference>
<dbReference type="PDB" id="4AGQ">
    <property type="method" value="X-ray"/>
    <property type="resolution" value="1.42 A"/>
    <property type="chains" value="A/B=94-312"/>
</dbReference>
<dbReference type="PDB" id="4BUZ">
    <property type="method" value="X-ray"/>
    <property type="resolution" value="1.90 A"/>
    <property type="chains" value="P=379-386"/>
</dbReference>
<dbReference type="PDB" id="4BV2">
    <property type="method" value="X-ray"/>
    <property type="resolution" value="3.30 A"/>
    <property type="chains" value="E/H=376-388"/>
</dbReference>
<dbReference type="PDB" id="4HFZ">
    <property type="method" value="X-ray"/>
    <property type="resolution" value="2.69 A"/>
    <property type="chains" value="B/D=15-29"/>
</dbReference>
<dbReference type="PDB" id="4HJE">
    <property type="method" value="X-ray"/>
    <property type="resolution" value="1.91 A"/>
    <property type="chains" value="A/B/C/D=92-291"/>
</dbReference>
<dbReference type="PDB" id="4IBQ">
    <property type="method" value="X-ray"/>
    <property type="resolution" value="1.80 A"/>
    <property type="chains" value="A/B/C/D=94-293"/>
</dbReference>
<dbReference type="PDB" id="4IBS">
    <property type="method" value="X-ray"/>
    <property type="resolution" value="1.78 A"/>
    <property type="chains" value="A/B/C/D=94-293"/>
</dbReference>
<dbReference type="PDB" id="4IBT">
    <property type="method" value="X-ray"/>
    <property type="resolution" value="1.70 A"/>
    <property type="chains" value="A/B/C/D=94-293"/>
</dbReference>
<dbReference type="PDB" id="4IBU">
    <property type="method" value="X-ray"/>
    <property type="resolution" value="1.70 A"/>
    <property type="chains" value="A/B/C/D=94-293"/>
</dbReference>
<dbReference type="PDB" id="4IBV">
    <property type="method" value="X-ray"/>
    <property type="resolution" value="2.10 A"/>
    <property type="chains" value="A=94-293"/>
</dbReference>
<dbReference type="PDB" id="4IBW">
    <property type="method" value="X-ray"/>
    <property type="resolution" value="1.79 A"/>
    <property type="chains" value="A=94-293"/>
</dbReference>
<dbReference type="PDB" id="4IBY">
    <property type="method" value="X-ray"/>
    <property type="resolution" value="1.45 A"/>
    <property type="chains" value="A/B=94-293"/>
</dbReference>
<dbReference type="PDB" id="4IBZ">
    <property type="method" value="X-ray"/>
    <property type="resolution" value="1.92 A"/>
    <property type="chains" value="A/B/C/D=94-293"/>
</dbReference>
<dbReference type="PDB" id="4IJT">
    <property type="method" value="X-ray"/>
    <property type="resolution" value="1.78 A"/>
    <property type="chains" value="A=94-293"/>
</dbReference>
<dbReference type="PDB" id="4KVP">
    <property type="method" value="X-ray"/>
    <property type="resolution" value="1.50 A"/>
    <property type="chains" value="A/B/C/D=94-312"/>
</dbReference>
<dbReference type="PDB" id="4LO9">
    <property type="method" value="X-ray"/>
    <property type="resolution" value="2.50 A"/>
    <property type="chains" value="A/B/C/D=94-312"/>
</dbReference>
<dbReference type="PDB" id="4LOE">
    <property type="method" value="X-ray"/>
    <property type="resolution" value="1.85 A"/>
    <property type="chains" value="A/B/C/D=94-312"/>
</dbReference>
<dbReference type="PDB" id="4LOF">
    <property type="method" value="X-ray"/>
    <property type="resolution" value="2.00 A"/>
    <property type="chains" value="A=94-312"/>
</dbReference>
<dbReference type="PDB" id="4MZI">
    <property type="method" value="X-ray"/>
    <property type="resolution" value="1.25 A"/>
    <property type="chains" value="A=94-292"/>
</dbReference>
<dbReference type="PDB" id="4MZR">
    <property type="method" value="X-ray"/>
    <property type="resolution" value="2.90 A"/>
    <property type="chains" value="A/B/C/D=94-358"/>
</dbReference>
<dbReference type="PDB" id="4QO1">
    <property type="method" value="X-ray"/>
    <property type="resolution" value="1.92 A"/>
    <property type="chains" value="B=92-312"/>
</dbReference>
<dbReference type="PDB" id="4RP6">
    <property type="method" value="X-ray"/>
    <property type="resolution" value="1.70 A"/>
    <property type="chains" value="Z=252-258"/>
</dbReference>
<dbReference type="PDB" id="4RP7">
    <property type="method" value="X-ray"/>
    <property type="resolution" value="1.58 A"/>
    <property type="chains" value="Z=253-258"/>
</dbReference>
<dbReference type="PDB" id="4X34">
    <property type="method" value="X-ray"/>
    <property type="resolution" value="1.80 A"/>
    <property type="chains" value="C/D=377-386"/>
</dbReference>
<dbReference type="PDB" id="4XR8">
    <property type="method" value="X-ray"/>
    <property type="resolution" value="2.25 A"/>
    <property type="chains" value="C/D=94-292"/>
</dbReference>
<dbReference type="PDB" id="4ZZJ">
    <property type="method" value="X-ray"/>
    <property type="resolution" value="2.74 A"/>
    <property type="chains" value="B=379-383"/>
</dbReference>
<dbReference type="PDB" id="5A7B">
    <property type="method" value="X-ray"/>
    <property type="resolution" value="1.40 A"/>
    <property type="chains" value="A/B=94-312"/>
</dbReference>
<dbReference type="PDB" id="5AB9">
    <property type="method" value="X-ray"/>
    <property type="resolution" value="1.36 A"/>
    <property type="chains" value="A/B=94-312"/>
</dbReference>
<dbReference type="PDB" id="5ABA">
    <property type="method" value="X-ray"/>
    <property type="resolution" value="1.62 A"/>
    <property type="chains" value="A/B=94-312"/>
</dbReference>
<dbReference type="PDB" id="5AOI">
    <property type="method" value="X-ray"/>
    <property type="resolution" value="1.78 A"/>
    <property type="chains" value="A/B=94-312"/>
</dbReference>
<dbReference type="PDB" id="5AOJ">
    <property type="method" value="X-ray"/>
    <property type="resolution" value="1.47 A"/>
    <property type="chains" value="A/B=94-312"/>
</dbReference>
<dbReference type="PDB" id="5AOK">
    <property type="method" value="X-ray"/>
    <property type="resolution" value="1.35 A"/>
    <property type="chains" value="A/B=94-312"/>
</dbReference>
<dbReference type="PDB" id="5AOL">
    <property type="method" value="X-ray"/>
    <property type="resolution" value="1.50 A"/>
    <property type="chains" value="A/B=94-312"/>
</dbReference>
<dbReference type="PDB" id="5AOM">
    <property type="method" value="X-ray"/>
    <property type="resolution" value="1.74 A"/>
    <property type="chains" value="A/B=94-312"/>
</dbReference>
<dbReference type="PDB" id="5BUA">
    <property type="method" value="X-ray"/>
    <property type="resolution" value="1.81 A"/>
    <property type="chains" value="A=94-293"/>
</dbReference>
<dbReference type="PDB" id="5ECG">
    <property type="method" value="X-ray"/>
    <property type="resolution" value="3.00 A"/>
    <property type="chains" value="A/B=95-312"/>
</dbReference>
<dbReference type="PDB" id="5G4M">
    <property type="method" value="X-ray"/>
    <property type="resolution" value="1.38 A"/>
    <property type="chains" value="A/B=94-312"/>
</dbReference>
<dbReference type="PDB" id="5G4N">
    <property type="method" value="X-ray"/>
    <property type="resolution" value="1.35 A"/>
    <property type="chains" value="A/B=94-312"/>
</dbReference>
<dbReference type="PDB" id="5G4O">
    <property type="method" value="X-ray"/>
    <property type="resolution" value="1.48 A"/>
    <property type="chains" value="A/B=94-312"/>
</dbReference>
<dbReference type="PDB" id="5HOU">
    <property type="method" value="NMR"/>
    <property type="chains" value="A=1-61"/>
</dbReference>
<dbReference type="PDB" id="5HP0">
    <property type="method" value="NMR"/>
    <property type="chains" value="A=37-61"/>
</dbReference>
<dbReference type="PDB" id="5HPD">
    <property type="method" value="NMR"/>
    <property type="chains" value="A=2-61"/>
</dbReference>
<dbReference type="PDB" id="5LAP">
    <property type="method" value="X-ray"/>
    <property type="resolution" value="1.42 A"/>
    <property type="chains" value="A/B=94-312"/>
</dbReference>
<dbReference type="PDB" id="5LGY">
    <property type="method" value="X-ray"/>
    <property type="resolution" value="2.92 A"/>
    <property type="chains" value="A/B/C/D=94-291"/>
</dbReference>
<dbReference type="PDB" id="5MCT">
    <property type="method" value="X-ray"/>
    <property type="resolution" value="1.45 A"/>
    <property type="chains" value="A/B=94-293"/>
</dbReference>
<dbReference type="PDB" id="5MCU">
    <property type="method" value="X-ray"/>
    <property type="resolution" value="1.70 A"/>
    <property type="chains" value="A/B=94-293"/>
</dbReference>
<dbReference type="PDB" id="5MCV">
    <property type="method" value="X-ray"/>
    <property type="resolution" value="1.60 A"/>
    <property type="chains" value="A/B=94-293"/>
</dbReference>
<dbReference type="PDB" id="5MCW">
    <property type="method" value="X-ray"/>
    <property type="resolution" value="1.90 A"/>
    <property type="chains" value="A/B=94-293"/>
</dbReference>
<dbReference type="PDB" id="5MF7">
    <property type="method" value="X-ray"/>
    <property type="resolution" value="1.59 A"/>
    <property type="chains" value="A/B=94-293"/>
</dbReference>
<dbReference type="PDB" id="5MG7">
    <property type="method" value="X-ray"/>
    <property type="resolution" value="1.45 A"/>
    <property type="chains" value="A/B=94-293"/>
</dbReference>
<dbReference type="PDB" id="5MHC">
    <property type="method" value="X-ray"/>
    <property type="resolution" value="1.20 A"/>
    <property type="chains" value="P=382-393"/>
</dbReference>
<dbReference type="PDB" id="5MOC">
    <property type="method" value="X-ray"/>
    <property type="resolution" value="1.80 A"/>
    <property type="chains" value="P=382-393"/>
</dbReference>
<dbReference type="PDB" id="5O1A">
    <property type="method" value="X-ray"/>
    <property type="resolution" value="1.44 A"/>
    <property type="chains" value="A/B=94-312"/>
</dbReference>
<dbReference type="PDB" id="5O1B">
    <property type="method" value="X-ray"/>
    <property type="resolution" value="1.43 A"/>
    <property type="chains" value="A/B=94-312"/>
</dbReference>
<dbReference type="PDB" id="5O1C">
    <property type="method" value="X-ray"/>
    <property type="resolution" value="1.32 A"/>
    <property type="chains" value="A/B=94-312"/>
</dbReference>
<dbReference type="PDB" id="5O1D">
    <property type="method" value="X-ray"/>
    <property type="resolution" value="1.36 A"/>
    <property type="chains" value="A/B=94-312"/>
</dbReference>
<dbReference type="PDB" id="5O1E">
    <property type="method" value="X-ray"/>
    <property type="resolution" value="1.30 A"/>
    <property type="chains" value="A/B=94-312"/>
</dbReference>
<dbReference type="PDB" id="5O1F">
    <property type="method" value="X-ray"/>
    <property type="resolution" value="1.38 A"/>
    <property type="chains" value="A/B=94-312"/>
</dbReference>
<dbReference type="PDB" id="5O1G">
    <property type="method" value="X-ray"/>
    <property type="resolution" value="1.35 A"/>
    <property type="chains" value="A/B=94-312"/>
</dbReference>
<dbReference type="PDB" id="5O1H">
    <property type="method" value="X-ray"/>
    <property type="resolution" value="1.32 A"/>
    <property type="chains" value="A/B=94-312"/>
</dbReference>
<dbReference type="PDB" id="5O1I">
    <property type="method" value="X-ray"/>
    <property type="resolution" value="1.40 A"/>
    <property type="chains" value="A/B=94-312"/>
</dbReference>
<dbReference type="PDB" id="5OL0">
    <property type="method" value="X-ray"/>
    <property type="resolution" value="1.99 A"/>
    <property type="chains" value="C/D=372-389"/>
</dbReference>
<dbReference type="PDB" id="5UN8">
    <property type="method" value="X-ray"/>
    <property type="resolution" value="2.13 A"/>
    <property type="chains" value="E/F/G/H=144-154"/>
</dbReference>
<dbReference type="PDB" id="5XZC">
    <property type="method" value="EM"/>
    <property type="resolution" value="10.70 A"/>
    <property type="chains" value="B/C/D/E=92-356"/>
</dbReference>
<dbReference type="PDB" id="6FF9">
    <property type="method" value="X-ray"/>
    <property type="resolution" value="2.00 A"/>
    <property type="chains" value="A/B/C/D=97-289"/>
</dbReference>
<dbReference type="PDB" id="6FJ5">
    <property type="method" value="X-ray"/>
    <property type="resolution" value="2.05 A"/>
    <property type="chains" value="A/B/C/D=94-293"/>
</dbReference>
<dbReference type="PDB" id="6GGA">
    <property type="method" value="X-ray"/>
    <property type="resolution" value="1.55 A"/>
    <property type="chains" value="A/B=94-312"/>
</dbReference>
<dbReference type="PDB" id="6GGB">
    <property type="method" value="X-ray"/>
    <property type="resolution" value="1.32 A"/>
    <property type="chains" value="A/B=94-312"/>
</dbReference>
<dbReference type="PDB" id="6GGC">
    <property type="method" value="X-ray"/>
    <property type="resolution" value="1.24 A"/>
    <property type="chains" value="A/B=94-312"/>
</dbReference>
<dbReference type="PDB" id="6GGD">
    <property type="method" value="X-ray"/>
    <property type="resolution" value="1.40 A"/>
    <property type="chains" value="A/B=94-312"/>
</dbReference>
<dbReference type="PDB" id="6GGE">
    <property type="method" value="X-ray"/>
    <property type="resolution" value="1.25 A"/>
    <property type="chains" value="A/B=94-312"/>
</dbReference>
<dbReference type="PDB" id="6GGF">
    <property type="method" value="X-ray"/>
    <property type="resolution" value="1.32 A"/>
    <property type="chains" value="A/B=94-312"/>
</dbReference>
<dbReference type="PDB" id="6LHD">
    <property type="method" value="X-ray"/>
    <property type="resolution" value="2.50 A"/>
    <property type="chains" value="A/B=96-292"/>
</dbReference>
<dbReference type="PDB" id="6R5L">
    <property type="method" value="X-ray"/>
    <property type="resolution" value="1.88 A"/>
    <property type="chains" value="P=382-393"/>
</dbReference>
<dbReference type="PDB" id="6RJZ">
    <property type="method" value="X-ray"/>
    <property type="resolution" value="1.58 A"/>
    <property type="chains" value="P=382-393"/>
</dbReference>
<dbReference type="PDB" id="6RK8">
    <property type="method" value="X-ray"/>
    <property type="resolution" value="1.60 A"/>
    <property type="chains" value="P=382-393"/>
</dbReference>
<dbReference type="PDB" id="6RKI">
    <property type="method" value="X-ray"/>
    <property type="resolution" value="1.88 A"/>
    <property type="chains" value="P=382-393"/>
</dbReference>
<dbReference type="PDB" id="6RKK">
    <property type="method" value="X-ray"/>
    <property type="resolution" value="1.88 A"/>
    <property type="chains" value="P=382-393"/>
</dbReference>
<dbReference type="PDB" id="6RKM">
    <property type="method" value="X-ray"/>
    <property type="resolution" value="1.88 A"/>
    <property type="chains" value="P=382-393"/>
</dbReference>
<dbReference type="PDB" id="6RL3">
    <property type="method" value="X-ray"/>
    <property type="resolution" value="1.30 A"/>
    <property type="chains" value="P=382-393"/>
</dbReference>
<dbReference type="PDB" id="6RL4">
    <property type="method" value="X-ray"/>
    <property type="resolution" value="1.60 A"/>
    <property type="chains" value="P=382-393"/>
</dbReference>
<dbReference type="PDB" id="6RL6">
    <property type="method" value="X-ray"/>
    <property type="resolution" value="1.60 A"/>
    <property type="chains" value="P=382-393"/>
</dbReference>
<dbReference type="PDB" id="6RM5">
    <property type="method" value="X-ray"/>
    <property type="resolution" value="1.88 A"/>
    <property type="chains" value="P=382-393"/>
</dbReference>
<dbReference type="PDB" id="6RM7">
    <property type="method" value="X-ray"/>
    <property type="resolution" value="1.60 A"/>
    <property type="chains" value="P=382-393"/>
</dbReference>
<dbReference type="PDB" id="6RWH">
    <property type="method" value="X-ray"/>
    <property type="resolution" value="1.68 A"/>
    <property type="chains" value="P=382-393"/>
</dbReference>
<dbReference type="PDB" id="6RWI">
    <property type="method" value="X-ray"/>
    <property type="resolution" value="1.65 A"/>
    <property type="chains" value="P=382-393"/>
</dbReference>
<dbReference type="PDB" id="6RWS">
    <property type="method" value="X-ray"/>
    <property type="resolution" value="1.53 A"/>
    <property type="chains" value="P=382-393"/>
</dbReference>
<dbReference type="PDB" id="6RWU">
    <property type="method" value="X-ray"/>
    <property type="resolution" value="1.46 A"/>
    <property type="chains" value="P=382-393"/>
</dbReference>
<dbReference type="PDB" id="6RX2">
    <property type="method" value="X-ray"/>
    <property type="resolution" value="1.82 A"/>
    <property type="chains" value="P=382-393"/>
</dbReference>
<dbReference type="PDB" id="6RZ3">
    <property type="method" value="X-ray"/>
    <property type="resolution" value="4.23 A"/>
    <property type="chains" value="A=62-292"/>
</dbReference>
<dbReference type="PDB" id="6S39">
    <property type="method" value="X-ray"/>
    <property type="resolution" value="1.88 A"/>
    <property type="chains" value="P=382-393"/>
</dbReference>
<dbReference type="PDB" id="6S3C">
    <property type="method" value="X-ray"/>
    <property type="resolution" value="2.00 A"/>
    <property type="chains" value="P=382-393"/>
</dbReference>
<dbReference type="PDB" id="6S40">
    <property type="method" value="X-ray"/>
    <property type="resolution" value="1.90 A"/>
    <property type="chains" value="P=382-393"/>
</dbReference>
<dbReference type="PDB" id="6S9Q">
    <property type="method" value="X-ray"/>
    <property type="resolution" value="1.69 A"/>
    <property type="chains" value="P=382-393"/>
</dbReference>
<dbReference type="PDB" id="6SHZ">
    <property type="method" value="X-ray"/>
    <property type="resolution" value="1.24 A"/>
    <property type="chains" value="A/B=94-311"/>
</dbReference>
<dbReference type="PDB" id="6SI0">
    <property type="method" value="X-ray"/>
    <property type="resolution" value="1.53 A"/>
    <property type="chains" value="A/B=94-312"/>
</dbReference>
<dbReference type="PDB" id="6SI1">
    <property type="method" value="X-ray"/>
    <property type="resolution" value="1.44 A"/>
    <property type="chains" value="A/B=94-312"/>
</dbReference>
<dbReference type="PDB" id="6SI2">
    <property type="method" value="X-ray"/>
    <property type="resolution" value="1.50 A"/>
    <property type="chains" value="A/B=94-312"/>
</dbReference>
<dbReference type="PDB" id="6SI3">
    <property type="method" value="X-ray"/>
    <property type="resolution" value="1.40 A"/>
    <property type="chains" value="A/B=94-312"/>
</dbReference>
<dbReference type="PDB" id="6SI4">
    <property type="method" value="X-ray"/>
    <property type="resolution" value="1.80 A"/>
    <property type="chains" value="A/B=94-312"/>
</dbReference>
<dbReference type="PDB" id="6SIN">
    <property type="method" value="X-ray"/>
    <property type="resolution" value="1.64 A"/>
    <property type="chains" value="P=382-393"/>
</dbReference>
<dbReference type="PDB" id="6SIO">
    <property type="method" value="X-ray"/>
    <property type="resolution" value="1.60 A"/>
    <property type="chains" value="P=382-393"/>
</dbReference>
<dbReference type="PDB" id="6SIP">
    <property type="method" value="X-ray"/>
    <property type="resolution" value="1.60 A"/>
    <property type="chains" value="P=382-393"/>
</dbReference>
<dbReference type="PDB" id="6SIQ">
    <property type="method" value="X-ray"/>
    <property type="resolution" value="1.60 A"/>
    <property type="chains" value="P=382-393"/>
</dbReference>
<dbReference type="PDB" id="6SL6">
    <property type="method" value="X-ray"/>
    <property type="resolution" value="1.67 A"/>
    <property type="chains" value="A=89-311"/>
</dbReference>
<dbReference type="PDB" id="6SLV">
    <property type="method" value="X-ray"/>
    <property type="resolution" value="1.90 A"/>
    <property type="chains" value="P=382-393"/>
</dbReference>
<dbReference type="PDB" id="6T58">
    <property type="method" value="X-ray"/>
    <property type="resolution" value="3.10 A"/>
    <property type="chains" value="A/B=17-56"/>
</dbReference>
<dbReference type="PDB" id="6V4F">
    <property type="method" value="X-ray"/>
    <property type="resolution" value="1.35 A"/>
    <property type="chains" value="B=14-29"/>
</dbReference>
<dbReference type="PDB" id="6V4H">
    <property type="method" value="X-ray"/>
    <property type="resolution" value="1.53 A"/>
    <property type="chains" value="B/D=14-29"/>
</dbReference>
<dbReference type="PDB" id="6VQO">
    <property type="method" value="X-ray"/>
    <property type="resolution" value="3.00 A"/>
    <property type="chains" value="P/Q=168-176"/>
</dbReference>
<dbReference type="PDB" id="6VR1">
    <property type="method" value="X-ray"/>
    <property type="resolution" value="2.37 A"/>
    <property type="chains" value="P/Q=168-176"/>
</dbReference>
<dbReference type="PDB" id="6VR5">
    <property type="method" value="X-ray"/>
    <property type="resolution" value="2.38 A"/>
    <property type="chains" value="P/Q=168-176"/>
</dbReference>
<dbReference type="PDB" id="6VRM">
    <property type="method" value="X-ray"/>
    <property type="resolution" value="2.61 A"/>
    <property type="chains" value="P=168-176"/>
</dbReference>
<dbReference type="PDB" id="6VRN">
    <property type="method" value="X-ray"/>
    <property type="resolution" value="2.46 A"/>
    <property type="chains" value="P=168-176"/>
</dbReference>
<dbReference type="PDB" id="6W51">
    <property type="method" value="X-ray"/>
    <property type="resolution" value="3.53 A"/>
    <property type="chains" value="C/F/I/L=168-176"/>
</dbReference>
<dbReference type="PDB" id="6XRE">
    <property type="method" value="EM"/>
    <property type="resolution" value="4.60 A"/>
    <property type="chains" value="M=1-393"/>
</dbReference>
<dbReference type="PDB" id="6ZNC">
    <property type="method" value="X-ray"/>
    <property type="resolution" value="1.64 A"/>
    <property type="chains" value="A=94-293"/>
</dbReference>
<dbReference type="PDB" id="7B46">
    <property type="method" value="X-ray"/>
    <property type="resolution" value="2.02 A"/>
    <property type="chains" value="A/B/C/D=94-293"/>
</dbReference>
<dbReference type="PDB" id="7B47">
    <property type="method" value="X-ray"/>
    <property type="resolution" value="1.80 A"/>
    <property type="chains" value="A/B/C/D=94-293"/>
</dbReference>
<dbReference type="PDB" id="7B48">
    <property type="method" value="X-ray"/>
    <property type="resolution" value="2.05 A"/>
    <property type="chains" value="A/B/C/D=94-293"/>
</dbReference>
<dbReference type="PDB" id="7B49">
    <property type="method" value="X-ray"/>
    <property type="resolution" value="1.42 A"/>
    <property type="chains" value="A/B=94-293"/>
</dbReference>
<dbReference type="PDB" id="7B4A">
    <property type="method" value="X-ray"/>
    <property type="resolution" value="1.90 A"/>
    <property type="chains" value="A/B=94-293"/>
</dbReference>
<dbReference type="PDB" id="7B4B">
    <property type="method" value="X-ray"/>
    <property type="resolution" value="1.76 A"/>
    <property type="chains" value="A/B/C/D=94-293"/>
</dbReference>
<dbReference type="PDB" id="7B4C">
    <property type="method" value="X-ray"/>
    <property type="resolution" value="1.71 A"/>
    <property type="chains" value="A/B/C/D=94-293"/>
</dbReference>
<dbReference type="PDB" id="7B4D">
    <property type="method" value="X-ray"/>
    <property type="resolution" value="1.85 A"/>
    <property type="chains" value="A=94-293"/>
</dbReference>
<dbReference type="PDB" id="7B4E">
    <property type="method" value="X-ray"/>
    <property type="resolution" value="1.58 A"/>
    <property type="chains" value="A=94-293"/>
</dbReference>
<dbReference type="PDB" id="7B4F">
    <property type="method" value="X-ray"/>
    <property type="resolution" value="1.78 A"/>
    <property type="chains" value="A=94-293"/>
</dbReference>
<dbReference type="PDB" id="7B4G">
    <property type="method" value="X-ray"/>
    <property type="resolution" value="1.86 A"/>
    <property type="chains" value="A=94-293"/>
</dbReference>
<dbReference type="PDB" id="7B4H">
    <property type="method" value="X-ray"/>
    <property type="resolution" value="1.39 A"/>
    <property type="chains" value="A=94-293"/>
</dbReference>
<dbReference type="PDB" id="7B4N">
    <property type="method" value="X-ray"/>
    <property type="resolution" value="1.32 A"/>
    <property type="chains" value="A=94-293"/>
</dbReference>
<dbReference type="PDB" id="7BWN">
    <property type="method" value="X-ray"/>
    <property type="resolution" value="2.40 A"/>
    <property type="chains" value="B/D/G/I/K/L/N/P=326-356"/>
</dbReference>
<dbReference type="PDB" id="7DHY">
    <property type="method" value="X-ray"/>
    <property type="resolution" value="2.15 A"/>
    <property type="chains" value="A/B/C/D=94-293"/>
</dbReference>
<dbReference type="PDB" id="7DHZ">
    <property type="method" value="X-ray"/>
    <property type="resolution" value="1.74 A"/>
    <property type="chains" value="A/B=94-293"/>
</dbReference>
<dbReference type="PDB" id="7DVD">
    <property type="method" value="X-ray"/>
    <property type="resolution" value="2.59 A"/>
    <property type="chains" value="A/B/C/D=92-290"/>
</dbReference>
<dbReference type="PDB" id="7EAX">
    <property type="method" value="X-ray"/>
    <property type="resolution" value="2.55 A"/>
    <property type="chains" value="A/B/C/D=96-289"/>
</dbReference>
<dbReference type="PDB" id="7EDS">
    <property type="method" value="X-ray"/>
    <property type="resolution" value="1.77 A"/>
    <property type="chains" value="A=94-293"/>
</dbReference>
<dbReference type="PDB" id="7EEU">
    <property type="method" value="X-ray"/>
    <property type="resolution" value="2.90 A"/>
    <property type="chains" value="A/B/C/D/E/F/G/H=94-293"/>
</dbReference>
<dbReference type="PDB" id="7EL4">
    <property type="method" value="X-ray"/>
    <property type="resolution" value="2.11 A"/>
    <property type="chains" value="A=23-29"/>
</dbReference>
<dbReference type="PDB" id="7NMI">
    <property type="method" value="X-ray"/>
    <property type="resolution" value="2.10 A"/>
    <property type="chains" value="A=17-56"/>
</dbReference>
<dbReference type="PDB" id="7RM4">
    <property type="method" value="X-ray"/>
    <property type="resolution" value="3.33 A"/>
    <property type="chains" value="C/H/M/R=168-176"/>
</dbReference>
<dbReference type="PDB" id="7V97">
    <property type="method" value="X-ray"/>
    <property type="resolution" value="2.02 A"/>
    <property type="chains" value="A/B/C/D=94-293"/>
</dbReference>
<dbReference type="PDB" id="7XZX">
    <property type="method" value="EM"/>
    <property type="resolution" value="4.53 A"/>
    <property type="chains" value="K/L/M/N=94-293"/>
</dbReference>
<dbReference type="PDB" id="7XZZ">
    <property type="method" value="EM"/>
    <property type="resolution" value="4.07 A"/>
    <property type="chains" value="K/L/M/N=1-393"/>
</dbReference>
<dbReference type="PDB" id="7YGI">
    <property type="method" value="X-ray"/>
    <property type="resolution" value="2.10 A"/>
    <property type="chains" value="A/B=92-289"/>
</dbReference>
<dbReference type="PDB" id="8A31">
    <property type="method" value="X-ray"/>
    <property type="resolution" value="1.46 A"/>
    <property type="chains" value="A/B=94-312"/>
</dbReference>
<dbReference type="PDB" id="8A32">
    <property type="method" value="X-ray"/>
    <property type="resolution" value="1.47 A"/>
    <property type="chains" value="A/B=94-312"/>
</dbReference>
<dbReference type="PDB" id="8A92">
    <property type="method" value="X-ray"/>
    <property type="resolution" value="1.37 A"/>
    <property type="chains" value="A/B=94-312"/>
</dbReference>
<dbReference type="PDB" id="8CG7">
    <property type="method" value="X-ray"/>
    <property type="resolution" value="1.53 A"/>
    <property type="chains" value="A/B=94-312"/>
</dbReference>
<dbReference type="PDB" id="8DC4">
    <property type="method" value="X-ray"/>
    <property type="resolution" value="2.40 A"/>
    <property type="chains" value="A/B/C/D=94-312"/>
</dbReference>
<dbReference type="PDB" id="8DC6">
    <property type="method" value="X-ray"/>
    <property type="resolution" value="1.60 A"/>
    <property type="chains" value="A/B/C/D=94-312"/>
</dbReference>
<dbReference type="PDB" id="8DC7">
    <property type="method" value="X-ray"/>
    <property type="resolution" value="1.99 A"/>
    <property type="chains" value="A=94-312"/>
</dbReference>
<dbReference type="PDB" id="8DC8">
    <property type="method" value="X-ray"/>
    <property type="resolution" value="1.72 A"/>
    <property type="chains" value="A=94-312"/>
</dbReference>
<dbReference type="PDB" id="8E7A">
    <property type="method" value="X-ray"/>
    <property type="resolution" value="1.30 A"/>
    <property type="chains" value="A=93-312"/>
</dbReference>
<dbReference type="PDB" id="8E7B">
    <property type="method" value="X-ray"/>
    <property type="resolution" value="2.50 A"/>
    <property type="chains" value="A/B=93-312"/>
</dbReference>
<dbReference type="PDB" id="8GCR">
    <property type="method" value="EM"/>
    <property type="resolution" value="3.38 A"/>
    <property type="chains" value="B=94-312"/>
</dbReference>
<dbReference type="PDB" id="8HLL">
    <property type="method" value="X-ray"/>
    <property type="resolution" value="2.62 A"/>
    <property type="chains" value="A=95-290"/>
</dbReference>
<dbReference type="PDB" id="8HLM">
    <property type="method" value="X-ray"/>
    <property type="resolution" value="2.52 A"/>
    <property type="chains" value="A=95-290"/>
</dbReference>
<dbReference type="PDB" id="8HLN">
    <property type="method" value="X-ray"/>
    <property type="resolution" value="2.35 A"/>
    <property type="chains" value="A=95-290"/>
</dbReference>
<dbReference type="PDB" id="8J8N">
    <property type="method" value="EM"/>
    <property type="resolution" value="9.02 A"/>
    <property type="chains" value="A/B/C/D=92-292"/>
</dbReference>
<dbReference type="PDB" id="8OXM">
    <property type="method" value="EM"/>
    <property type="resolution" value="3.30 A"/>
    <property type="chains" value="E/F=11-22"/>
</dbReference>
<dbReference type="PDB" id="8OXO">
    <property type="method" value="EM"/>
    <property type="resolution" value="3.00 A"/>
    <property type="chains" value="E/F=11-22"/>
</dbReference>
<dbReference type="PDB" id="8QWK">
    <property type="method" value="X-ray"/>
    <property type="resolution" value="1.69 A"/>
    <property type="chains" value="A=94-312"/>
</dbReference>
<dbReference type="PDB" id="8QWL">
    <property type="method" value="X-ray"/>
    <property type="resolution" value="1.65 A"/>
    <property type="chains" value="A=94-312"/>
</dbReference>
<dbReference type="PDB" id="8QWM">
    <property type="method" value="X-ray"/>
    <property type="resolution" value="1.54 A"/>
    <property type="chains" value="A/B=94-312"/>
</dbReference>
<dbReference type="PDB" id="8QWN">
    <property type="method" value="X-ray"/>
    <property type="resolution" value="1.44 A"/>
    <property type="chains" value="A=94-312"/>
</dbReference>
<dbReference type="PDB" id="8QWO">
    <property type="method" value="X-ray"/>
    <property type="resolution" value="1.38 A"/>
    <property type="chains" value="A/B=94-312"/>
</dbReference>
<dbReference type="PDB" id="8QWP">
    <property type="method" value="X-ray"/>
    <property type="resolution" value="2.10 A"/>
    <property type="chains" value="A/B=94-312"/>
</dbReference>
<dbReference type="PDB" id="8R1F">
    <property type="method" value="EM"/>
    <property type="resolution" value="3.67 A"/>
    <property type="chains" value="C=1-393"/>
</dbReference>
<dbReference type="PDB" id="8R1G">
    <property type="method" value="EM"/>
    <property type="resolution" value="3.99 A"/>
    <property type="chains" value="C/F=1-393"/>
</dbReference>
<dbReference type="PDB" id="8RBA">
    <property type="method" value="X-ray"/>
    <property type="resolution" value="1.57 A"/>
    <property type="chains" value="A/B=94-312"/>
</dbReference>
<dbReference type="PDB" id="8RBB">
    <property type="method" value="X-ray"/>
    <property type="resolution" value="1.69 A"/>
    <property type="chains" value="A/B=94-312"/>
</dbReference>
<dbReference type="PDB" id="8RBC">
    <property type="method" value="X-ray"/>
    <property type="resolution" value="2.06 A"/>
    <property type="chains" value="A/B=94-312"/>
</dbReference>
<dbReference type="PDB" id="8RCI">
    <property type="method" value="X-ray"/>
    <property type="resolution" value="1.50 A"/>
    <property type="chains" value="A=94-294"/>
</dbReference>
<dbReference type="PDB" id="8UQR">
    <property type="method" value="X-ray"/>
    <property type="resolution" value="1.22 A"/>
    <property type="chains" value="A/B/C/D=326-356"/>
</dbReference>
<dbReference type="PDB" id="8WD2">
    <property type="method" value="X-ray"/>
    <property type="resolution" value="1.85 A"/>
    <property type="chains" value="A/B=94-312"/>
</dbReference>
<dbReference type="PDB" id="8XP5">
    <property type="method" value="X-ray"/>
    <property type="resolution" value="2.55 A"/>
    <property type="chains" value="A/B=95-292"/>
</dbReference>
<dbReference type="PDB" id="9BR4">
    <property type="method" value="X-ray"/>
    <property type="resolution" value="1.70 A"/>
    <property type="chains" value="A/B=94-312"/>
</dbReference>
<dbReference type="PDB" id="9C5S">
    <property type="method" value="X-ray"/>
    <property type="resolution" value="1.01 A"/>
    <property type="chains" value="A/B/C/D=17-30"/>
</dbReference>
<dbReference type="PDB" id="9CHT">
    <property type="method" value="EM"/>
    <property type="resolution" value="3.54 A"/>
    <property type="chains" value="B=1-312"/>
</dbReference>
<dbReference type="PDBsum" id="1A1U"/>
<dbReference type="PDBsum" id="1AIE"/>
<dbReference type="PDBsum" id="1C26"/>
<dbReference type="PDBsum" id="1DT7"/>
<dbReference type="PDBsum" id="1GZH"/>
<dbReference type="PDBsum" id="1H26"/>
<dbReference type="PDBsum" id="1HS5"/>
<dbReference type="PDBsum" id="1JSP"/>
<dbReference type="PDBsum" id="1KZY"/>
<dbReference type="PDBsum" id="1MA3"/>
<dbReference type="PDBsum" id="1OLG"/>
<dbReference type="PDBsum" id="1OLH"/>
<dbReference type="PDBsum" id="1PES"/>
<dbReference type="PDBsum" id="1PET"/>
<dbReference type="PDBsum" id="1SAE"/>
<dbReference type="PDBsum" id="1SAF"/>
<dbReference type="PDBsum" id="1SAK"/>
<dbReference type="PDBsum" id="1SAL"/>
<dbReference type="PDBsum" id="1TSR"/>
<dbReference type="PDBsum" id="1TUP"/>
<dbReference type="PDBsum" id="1UOL"/>
<dbReference type="PDBsum" id="1XQH"/>
<dbReference type="PDBsum" id="1YC5"/>
<dbReference type="PDBsum" id="1YCQ"/>
<dbReference type="PDBsum" id="1YCR"/>
<dbReference type="PDBsum" id="1YCS"/>
<dbReference type="PDBsum" id="2AC0"/>
<dbReference type="PDBsum" id="2ADY"/>
<dbReference type="PDBsum" id="2AHI"/>
<dbReference type="PDBsum" id="2ATA"/>
<dbReference type="PDBsum" id="2B3G"/>
<dbReference type="PDBsum" id="2BIM"/>
<dbReference type="PDBsum" id="2BIN"/>
<dbReference type="PDBsum" id="2BIO"/>
<dbReference type="PDBsum" id="2BIP"/>
<dbReference type="PDBsum" id="2BIQ"/>
<dbReference type="PDBsum" id="2F1X"/>
<dbReference type="PDBsum" id="2FEJ"/>
<dbReference type="PDBsum" id="2FOJ"/>
<dbReference type="PDBsum" id="2FOO"/>
<dbReference type="PDBsum" id="2GS0"/>
<dbReference type="PDBsum" id="2H1L"/>
<dbReference type="PDBsum" id="2H2D"/>
<dbReference type="PDBsum" id="2H2F"/>
<dbReference type="PDBsum" id="2H4F"/>
<dbReference type="PDBsum" id="2H4H"/>
<dbReference type="PDBsum" id="2H4J"/>
<dbReference type="PDBsum" id="2H59"/>
<dbReference type="PDBsum" id="2J0Z"/>
<dbReference type="PDBsum" id="2J10"/>
<dbReference type="PDBsum" id="2J11"/>
<dbReference type="PDBsum" id="2J1W"/>
<dbReference type="PDBsum" id="2J1X"/>
<dbReference type="PDBsum" id="2J1Y"/>
<dbReference type="PDBsum" id="2J1Z"/>
<dbReference type="PDBsum" id="2J20"/>
<dbReference type="PDBsum" id="2J21"/>
<dbReference type="PDBsum" id="2K8F"/>
<dbReference type="PDBsum" id="2L14"/>
<dbReference type="PDBsum" id="2LY4"/>
<dbReference type="PDBsum" id="2MEJ"/>
<dbReference type="PDBsum" id="2MWO"/>
<dbReference type="PDBsum" id="2MWP"/>
<dbReference type="PDBsum" id="2MWY"/>
<dbReference type="PDBsum" id="2MZD"/>
<dbReference type="PDBsum" id="2OCJ"/>
<dbReference type="PDBsum" id="2PCX"/>
<dbReference type="PDBsum" id="2RUK"/>
<dbReference type="PDBsum" id="2VUK"/>
<dbReference type="PDBsum" id="2WGX"/>
<dbReference type="PDBsum" id="2X0U"/>
<dbReference type="PDBsum" id="2X0V"/>
<dbReference type="PDBsum" id="2X0W"/>
<dbReference type="PDBsum" id="2XWR"/>
<dbReference type="PDBsum" id="2YBG"/>
<dbReference type="PDBsum" id="2YDR"/>
<dbReference type="PDBsum" id="2Z5S"/>
<dbReference type="PDBsum" id="2Z5T"/>
<dbReference type="PDBsum" id="3D05"/>
<dbReference type="PDBsum" id="3D06"/>
<dbReference type="PDBsum" id="3D07"/>
<dbReference type="PDBsum" id="3D08"/>
<dbReference type="PDBsum" id="3D09"/>
<dbReference type="PDBsum" id="3D0A"/>
<dbReference type="PDBsum" id="3DAB"/>
<dbReference type="PDBsum" id="3DAC"/>
<dbReference type="PDBsum" id="3IGK"/>
<dbReference type="PDBsum" id="3IGL"/>
<dbReference type="PDBsum" id="3KMD"/>
<dbReference type="PDBsum" id="3KZ8"/>
<dbReference type="PDBsum" id="3LW1"/>
<dbReference type="PDBsum" id="3OQ5"/>
<dbReference type="PDBsum" id="3PDH"/>
<dbReference type="PDBsum" id="3Q01"/>
<dbReference type="PDBsum" id="3Q05"/>
<dbReference type="PDBsum" id="3Q06"/>
<dbReference type="PDBsum" id="3SAK"/>
<dbReference type="PDBsum" id="3TG5"/>
<dbReference type="PDBsum" id="3TS8"/>
<dbReference type="PDBsum" id="3ZME"/>
<dbReference type="PDBsum" id="4AGL"/>
<dbReference type="PDBsum" id="4AGM"/>
<dbReference type="PDBsum" id="4AGN"/>
<dbReference type="PDBsum" id="4AGO"/>
<dbReference type="PDBsum" id="4AGP"/>
<dbReference type="PDBsum" id="4AGQ"/>
<dbReference type="PDBsum" id="4BUZ"/>
<dbReference type="PDBsum" id="4BV2"/>
<dbReference type="PDBsum" id="4HFZ"/>
<dbReference type="PDBsum" id="4HJE"/>
<dbReference type="PDBsum" id="4IBQ"/>
<dbReference type="PDBsum" id="4IBS"/>
<dbReference type="PDBsum" id="4IBT"/>
<dbReference type="PDBsum" id="4IBU"/>
<dbReference type="PDBsum" id="4IBV"/>
<dbReference type="PDBsum" id="4IBW"/>
<dbReference type="PDBsum" id="4IBY"/>
<dbReference type="PDBsum" id="4IBZ"/>
<dbReference type="PDBsum" id="4IJT"/>
<dbReference type="PDBsum" id="4KVP"/>
<dbReference type="PDBsum" id="4LO9"/>
<dbReference type="PDBsum" id="4LOE"/>
<dbReference type="PDBsum" id="4LOF"/>
<dbReference type="PDBsum" id="4MZI"/>
<dbReference type="PDBsum" id="4MZR"/>
<dbReference type="PDBsum" id="4QO1"/>
<dbReference type="PDBsum" id="4RP6"/>
<dbReference type="PDBsum" id="4RP7"/>
<dbReference type="PDBsum" id="4X34"/>
<dbReference type="PDBsum" id="4XR8"/>
<dbReference type="PDBsum" id="4ZZJ"/>
<dbReference type="PDBsum" id="5A7B"/>
<dbReference type="PDBsum" id="5AB9"/>
<dbReference type="PDBsum" id="5ABA"/>
<dbReference type="PDBsum" id="5AOI"/>
<dbReference type="PDBsum" id="5AOJ"/>
<dbReference type="PDBsum" id="5AOK"/>
<dbReference type="PDBsum" id="5AOL"/>
<dbReference type="PDBsum" id="5AOM"/>
<dbReference type="PDBsum" id="5BUA"/>
<dbReference type="PDBsum" id="5ECG"/>
<dbReference type="PDBsum" id="5G4M"/>
<dbReference type="PDBsum" id="5G4N"/>
<dbReference type="PDBsum" id="5G4O"/>
<dbReference type="PDBsum" id="5HOU"/>
<dbReference type="PDBsum" id="5HP0"/>
<dbReference type="PDBsum" id="5HPD"/>
<dbReference type="PDBsum" id="5LAP"/>
<dbReference type="PDBsum" id="5LGY"/>
<dbReference type="PDBsum" id="5MCT"/>
<dbReference type="PDBsum" id="5MCU"/>
<dbReference type="PDBsum" id="5MCV"/>
<dbReference type="PDBsum" id="5MCW"/>
<dbReference type="PDBsum" id="5MF7"/>
<dbReference type="PDBsum" id="5MG7"/>
<dbReference type="PDBsum" id="5MHC"/>
<dbReference type="PDBsum" id="5MOC"/>
<dbReference type="PDBsum" id="5O1A"/>
<dbReference type="PDBsum" id="5O1B"/>
<dbReference type="PDBsum" id="5O1C"/>
<dbReference type="PDBsum" id="5O1D"/>
<dbReference type="PDBsum" id="5O1E"/>
<dbReference type="PDBsum" id="5O1F"/>
<dbReference type="PDBsum" id="5O1G"/>
<dbReference type="PDBsum" id="5O1H"/>
<dbReference type="PDBsum" id="5O1I"/>
<dbReference type="PDBsum" id="5OL0"/>
<dbReference type="PDBsum" id="5UN8"/>
<dbReference type="PDBsum" id="5XZC"/>
<dbReference type="PDBsum" id="6FF9"/>
<dbReference type="PDBsum" id="6FJ5"/>
<dbReference type="PDBsum" id="6GGA"/>
<dbReference type="PDBsum" id="6GGB"/>
<dbReference type="PDBsum" id="6GGC"/>
<dbReference type="PDBsum" id="6GGD"/>
<dbReference type="PDBsum" id="6GGE"/>
<dbReference type="PDBsum" id="6GGF"/>
<dbReference type="PDBsum" id="6LHD"/>
<dbReference type="PDBsum" id="6R5L"/>
<dbReference type="PDBsum" id="6RJZ"/>
<dbReference type="PDBsum" id="6RK8"/>
<dbReference type="PDBsum" id="6RKI"/>
<dbReference type="PDBsum" id="6RKK"/>
<dbReference type="PDBsum" id="6RKM"/>
<dbReference type="PDBsum" id="6RL3"/>
<dbReference type="PDBsum" id="6RL4"/>
<dbReference type="PDBsum" id="6RL6"/>
<dbReference type="PDBsum" id="6RM5"/>
<dbReference type="PDBsum" id="6RM7"/>
<dbReference type="PDBsum" id="6RWH"/>
<dbReference type="PDBsum" id="6RWI"/>
<dbReference type="PDBsum" id="6RWS"/>
<dbReference type="PDBsum" id="6RWU"/>
<dbReference type="PDBsum" id="6RX2"/>
<dbReference type="PDBsum" id="6RZ3"/>
<dbReference type="PDBsum" id="6S39"/>
<dbReference type="PDBsum" id="6S3C"/>
<dbReference type="PDBsum" id="6S40"/>
<dbReference type="PDBsum" id="6S9Q"/>
<dbReference type="PDBsum" id="6SHZ"/>
<dbReference type="PDBsum" id="6SI0"/>
<dbReference type="PDBsum" id="6SI1"/>
<dbReference type="PDBsum" id="6SI2"/>
<dbReference type="PDBsum" id="6SI3"/>
<dbReference type="PDBsum" id="6SI4"/>
<dbReference type="PDBsum" id="6SIN"/>
<dbReference type="PDBsum" id="6SIO"/>
<dbReference type="PDBsum" id="6SIP"/>
<dbReference type="PDBsum" id="6SIQ"/>
<dbReference type="PDBsum" id="6SL6"/>
<dbReference type="PDBsum" id="6SLV"/>
<dbReference type="PDBsum" id="6T58"/>
<dbReference type="PDBsum" id="6V4F"/>
<dbReference type="PDBsum" id="6V4H"/>
<dbReference type="PDBsum" id="6VQO"/>
<dbReference type="PDBsum" id="6VR1"/>
<dbReference type="PDBsum" id="6VR5"/>
<dbReference type="PDBsum" id="6VRM"/>
<dbReference type="PDBsum" id="6VRN"/>
<dbReference type="PDBsum" id="6W51"/>
<dbReference type="PDBsum" id="6XRE"/>
<dbReference type="PDBsum" id="6ZNC"/>
<dbReference type="PDBsum" id="7B46"/>
<dbReference type="PDBsum" id="7B47"/>
<dbReference type="PDBsum" id="7B48"/>
<dbReference type="PDBsum" id="7B49"/>
<dbReference type="PDBsum" id="7B4A"/>
<dbReference type="PDBsum" id="7B4B"/>
<dbReference type="PDBsum" id="7B4C"/>
<dbReference type="PDBsum" id="7B4D"/>
<dbReference type="PDBsum" id="7B4E"/>
<dbReference type="PDBsum" id="7B4F"/>
<dbReference type="PDBsum" id="7B4G"/>
<dbReference type="PDBsum" id="7B4H"/>
<dbReference type="PDBsum" id="7B4N"/>
<dbReference type="PDBsum" id="7BWN"/>
<dbReference type="PDBsum" id="7DHY"/>
<dbReference type="PDBsum" id="7DHZ"/>
<dbReference type="PDBsum" id="7DVD"/>
<dbReference type="PDBsum" id="7EAX"/>
<dbReference type="PDBsum" id="7EDS"/>
<dbReference type="PDBsum" id="7EEU"/>
<dbReference type="PDBsum" id="7EL4"/>
<dbReference type="PDBsum" id="7NMI"/>
<dbReference type="PDBsum" id="7RM4"/>
<dbReference type="PDBsum" id="7V97"/>
<dbReference type="PDBsum" id="7XZX"/>
<dbReference type="PDBsum" id="7XZZ"/>
<dbReference type="PDBsum" id="7YGI"/>
<dbReference type="PDBsum" id="8A31"/>
<dbReference type="PDBsum" id="8A32"/>
<dbReference type="PDBsum" id="8A92"/>
<dbReference type="PDBsum" id="8CG7"/>
<dbReference type="PDBsum" id="8DC4"/>
<dbReference type="PDBsum" id="8DC6"/>
<dbReference type="PDBsum" id="8DC7"/>
<dbReference type="PDBsum" id="8DC8"/>
<dbReference type="PDBsum" id="8E7A"/>
<dbReference type="PDBsum" id="8E7B"/>
<dbReference type="PDBsum" id="8GCR"/>
<dbReference type="PDBsum" id="8HLL"/>
<dbReference type="PDBsum" id="8HLM"/>
<dbReference type="PDBsum" id="8HLN"/>
<dbReference type="PDBsum" id="8J8N"/>
<dbReference type="PDBsum" id="8OXM"/>
<dbReference type="PDBsum" id="8OXO"/>
<dbReference type="PDBsum" id="8QWK"/>
<dbReference type="PDBsum" id="8QWL"/>
<dbReference type="PDBsum" id="8QWM"/>
<dbReference type="PDBsum" id="8QWN"/>
<dbReference type="PDBsum" id="8QWO"/>
<dbReference type="PDBsum" id="8QWP"/>
<dbReference type="PDBsum" id="8R1F"/>
<dbReference type="PDBsum" id="8R1G"/>
<dbReference type="PDBsum" id="8RBA"/>
<dbReference type="PDBsum" id="8RBB"/>
<dbReference type="PDBsum" id="8RBC"/>
<dbReference type="PDBsum" id="8RCI"/>
<dbReference type="PDBsum" id="8UQR"/>
<dbReference type="PDBsum" id="8WD2"/>
<dbReference type="PDBsum" id="8XP5"/>
<dbReference type="PDBsum" id="9BR4"/>
<dbReference type="PDBsum" id="9C5S"/>
<dbReference type="PDBsum" id="9CHT"/>
<dbReference type="BMRB" id="P04637"/>
<dbReference type="EMDB" id="EMD-0378"/>
<dbReference type="EMDB" id="EMD-17265"/>
<dbReference type="EMDB" id="EMD-17266"/>
<dbReference type="EMDB" id="EMD-18809"/>
<dbReference type="EMDB" id="EMD-18810"/>
<dbReference type="EMDB" id="EMD-22294"/>
<dbReference type="EMDB" id="EMD-22827"/>
<dbReference type="EMDB" id="EMD-29941"/>
<dbReference type="EMDB" id="EMD-33533"/>
<dbReference type="EMDB" id="EMD-33535"/>
<dbReference type="EMDB" id="EMD-36075"/>
<dbReference type="EMDB" id="EMD-45601"/>
<dbReference type="EMDB" id="EMD-6791"/>
<dbReference type="EMDB" id="EMD-8926"/>
<dbReference type="EMDB" id="EMD-8927"/>
<dbReference type="SMR" id="P04637"/>
<dbReference type="BioGRID" id="113010">
    <property type="interactions" value="2563"/>
</dbReference>
<dbReference type="ComplexPortal" id="CPX-6093">
    <property type="entry name" value="p53-MDM2-MDM4 transcriptional regulation complex"/>
</dbReference>
<dbReference type="ComplexPortal" id="CPX-663">
    <property type="entry name" value="p53-MDM4 transcriptional regulation complex"/>
</dbReference>
<dbReference type="ComplexPortal" id="CPX-759">
    <property type="entry name" value="p53-MDM2 transcriptional regulation complex"/>
</dbReference>
<dbReference type="CORUM" id="P04637"/>
<dbReference type="DIP" id="DIP-368N"/>
<dbReference type="ELM" id="P04637"/>
<dbReference type="FunCoup" id="P04637">
    <property type="interactions" value="3248"/>
</dbReference>
<dbReference type="IntAct" id="P04637">
    <property type="interactions" value="637"/>
</dbReference>
<dbReference type="MINT" id="P04637"/>
<dbReference type="STRING" id="9606.ENSP00000269305"/>
<dbReference type="BindingDB" id="P04637"/>
<dbReference type="ChEMBL" id="CHEMBL4096"/>
<dbReference type="DrugBank" id="DB08363">
    <property type="generic name" value="1-(9-ethyl-9H-carbazol-3-yl)-N-methylmethanamine"/>
</dbReference>
<dbReference type="DrugBank" id="DB13010">
    <property type="generic name" value="4-isothioureidobutyronitrile"/>
</dbReference>
<dbReference type="DrugBank" id="DB00945">
    <property type="generic name" value="Acetylsalicylic acid"/>
</dbReference>
<dbReference type="DrugBank" id="DB17549">
    <property type="generic name" value="Alrizomadlin"/>
</dbReference>
<dbReference type="DrugBank" id="DB05404">
    <property type="generic name" value="AZD 3355"/>
</dbReference>
<dbReference type="DrugBank" id="DB17507">
    <property type="generic name" value="COTI-2"/>
</dbReference>
<dbReference type="DrugBank" id="DB11684">
    <property type="generic name" value="Eprenetapopt"/>
</dbReference>
<dbReference type="DrugBank" id="DB17039">
    <property type="generic name" value="Nutlin-3"/>
</dbReference>
<dbReference type="DrugBank" id="DB12541">
    <property type="generic name" value="SAR-405838"/>
</dbReference>
<dbReference type="DrugBank" id="DB16331">
    <property type="generic name" value="Siremadlin"/>
</dbReference>
<dbReference type="DrugBank" id="DB16447">
    <property type="generic name" value="Thymoquinone"/>
</dbReference>
<dbReference type="DrugBank" id="DB03347">
    <property type="generic name" value="Triethyl phosphate"/>
</dbReference>
<dbReference type="DrugBank" id="DB01593">
    <property type="generic name" value="Zinc"/>
</dbReference>
<dbReference type="DrugBank" id="DB14487">
    <property type="generic name" value="Zinc acetate"/>
</dbReference>
<dbReference type="DrugBank" id="DB14533">
    <property type="generic name" value="Zinc chloride"/>
</dbReference>
<dbReference type="DrugBank" id="DB14548">
    <property type="generic name" value="Zinc sulfate, unspecified form"/>
</dbReference>
<dbReference type="MoonDB" id="P04637">
    <property type="type" value="Predicted"/>
</dbReference>
<dbReference type="TCDB" id="1.C.110.1.1">
    <property type="family name" value="the pore-forming pnc-27 peptide of 32 aas from the p53 tumor suppressor protein (pnc-27) family"/>
</dbReference>
<dbReference type="GlyCosmos" id="P04637">
    <property type="glycosylation" value="1 site, 1 glycan"/>
</dbReference>
<dbReference type="GlyGen" id="P04637">
    <property type="glycosylation" value="3 sites, 1 O-linked glycan (1 site)"/>
</dbReference>
<dbReference type="iPTMnet" id="P04637"/>
<dbReference type="MetOSite" id="P04637"/>
<dbReference type="PhosphoSitePlus" id="P04637"/>
<dbReference type="SwissPalm" id="P04637"/>
<dbReference type="BioMuta" id="TP53"/>
<dbReference type="DMDM" id="269849759"/>
<dbReference type="CPTAC" id="CPTAC-5895"/>
<dbReference type="CPTAC" id="CPTAC-5896"/>
<dbReference type="CPTAC" id="CPTAC-951"/>
<dbReference type="jPOST" id="P04637"/>
<dbReference type="MassIVE" id="P04637"/>
<dbReference type="PaxDb" id="9606-ENSP00000269305"/>
<dbReference type="PeptideAtlas" id="P04637"/>
<dbReference type="ProteomicsDB" id="51728">
    <molecule id="P04637-1"/>
</dbReference>
<dbReference type="ProteomicsDB" id="51729">
    <molecule id="P04637-2"/>
</dbReference>
<dbReference type="ProteomicsDB" id="51730">
    <molecule id="P04637-3"/>
</dbReference>
<dbReference type="ProteomicsDB" id="51731">
    <molecule id="P04637-4"/>
</dbReference>
<dbReference type="ProteomicsDB" id="51732">
    <molecule id="P04637-5"/>
</dbReference>
<dbReference type="ProteomicsDB" id="51733">
    <molecule id="P04637-6"/>
</dbReference>
<dbReference type="ProteomicsDB" id="51734">
    <molecule id="P04637-7"/>
</dbReference>
<dbReference type="ProteomicsDB" id="51735">
    <molecule id="P04637-8"/>
</dbReference>
<dbReference type="ProteomicsDB" id="51736">
    <molecule id="P04637-9"/>
</dbReference>
<dbReference type="Pumba" id="P04637"/>
<dbReference type="ABCD" id="P04637">
    <property type="antibodies" value="67 sequenced antibodies"/>
</dbReference>
<dbReference type="Antibodypedia" id="3525">
    <property type="antibodies" value="9638 antibodies from 65 providers"/>
</dbReference>
<dbReference type="CPTC" id="P04637">
    <property type="antibodies" value="2 antibodies"/>
</dbReference>
<dbReference type="DNASU" id="7157"/>
<dbReference type="Ensembl" id="ENST00000269305.9">
    <molecule id="P04637-1"/>
    <property type="protein sequence ID" value="ENSP00000269305.4"/>
    <property type="gene ID" value="ENSG00000141510.19"/>
</dbReference>
<dbReference type="Ensembl" id="ENST00000420246.6">
    <molecule id="P04637-2"/>
    <property type="protein sequence ID" value="ENSP00000391127.2"/>
    <property type="gene ID" value="ENSG00000141510.19"/>
</dbReference>
<dbReference type="Ensembl" id="ENST00000445888.6">
    <molecule id="P04637-1"/>
    <property type="protein sequence ID" value="ENSP00000391478.2"/>
    <property type="gene ID" value="ENSG00000141510.19"/>
</dbReference>
<dbReference type="Ensembl" id="ENST00000455263.6">
    <molecule id="P04637-3"/>
    <property type="protein sequence ID" value="ENSP00000398846.2"/>
    <property type="gene ID" value="ENSG00000141510.19"/>
</dbReference>
<dbReference type="Ensembl" id="ENST00000503591.2">
    <molecule id="P04637-1"/>
    <property type="protein sequence ID" value="ENSP00000426252.2"/>
    <property type="gene ID" value="ENSG00000141510.19"/>
</dbReference>
<dbReference type="Ensembl" id="ENST00000504290.5">
    <molecule id="P04637-9"/>
    <property type="protein sequence ID" value="ENSP00000484409.1"/>
    <property type="gene ID" value="ENSG00000141510.19"/>
</dbReference>
<dbReference type="Ensembl" id="ENST00000504937.5">
    <molecule id="P04637-7"/>
    <property type="protein sequence ID" value="ENSP00000481179.1"/>
    <property type="gene ID" value="ENSG00000141510.19"/>
</dbReference>
<dbReference type="Ensembl" id="ENST00000508793.6">
    <molecule id="P04637-1"/>
    <property type="protein sequence ID" value="ENSP00000424104.2"/>
    <property type="gene ID" value="ENSG00000141510.19"/>
</dbReference>
<dbReference type="Ensembl" id="ENST00000509690.6">
    <molecule id="P04637-7"/>
    <property type="protein sequence ID" value="ENSP00000425104.2"/>
    <property type="gene ID" value="ENSG00000141510.19"/>
</dbReference>
<dbReference type="Ensembl" id="ENST00000510385.5">
    <molecule id="P04637-8"/>
    <property type="protein sequence ID" value="ENSP00000478499.1"/>
    <property type="gene ID" value="ENSG00000141510.19"/>
</dbReference>
<dbReference type="Ensembl" id="ENST00000610292.4">
    <molecule id="P04637-4"/>
    <property type="protein sequence ID" value="ENSP00000478219.1"/>
    <property type="gene ID" value="ENSG00000141510.19"/>
</dbReference>
<dbReference type="Ensembl" id="ENST00000610538.4">
    <molecule id="P04637-6"/>
    <property type="protein sequence ID" value="ENSP00000480868.1"/>
    <property type="gene ID" value="ENSG00000141510.19"/>
</dbReference>
<dbReference type="Ensembl" id="ENST00000619485.4">
    <molecule id="P04637-4"/>
    <property type="protein sequence ID" value="ENSP00000482537.1"/>
    <property type="gene ID" value="ENSG00000141510.19"/>
</dbReference>
<dbReference type="Ensembl" id="ENST00000620739.4">
    <molecule id="P04637-4"/>
    <property type="protein sequence ID" value="ENSP00000481638.1"/>
    <property type="gene ID" value="ENSG00000141510.19"/>
</dbReference>
<dbReference type="Ensembl" id="ENST00000622645.4">
    <molecule id="P04637-5"/>
    <property type="protein sequence ID" value="ENSP00000482222.1"/>
    <property type="gene ID" value="ENSG00000141510.19"/>
</dbReference>
<dbReference type="Ensembl" id="ENST00000714357.1">
    <molecule id="P04637-1"/>
    <property type="protein sequence ID" value="ENSP00000519624.1"/>
    <property type="gene ID" value="ENSG00000141510.19"/>
</dbReference>
<dbReference type="Ensembl" id="ENST00000714359.1">
    <molecule id="P04637-1"/>
    <property type="protein sequence ID" value="ENSP00000519626.1"/>
    <property type="gene ID" value="ENSG00000141510.19"/>
</dbReference>
<dbReference type="GeneID" id="7157"/>
<dbReference type="KEGG" id="hsa:7157"/>
<dbReference type="MANE-Select" id="ENST00000269305.9">
    <property type="protein sequence ID" value="ENSP00000269305.4"/>
    <property type="RefSeq nucleotide sequence ID" value="NM_000546.6"/>
    <property type="RefSeq protein sequence ID" value="NP_000537.3"/>
</dbReference>
<dbReference type="UCSC" id="uc002gij.4">
    <molecule id="P04637-1"/>
    <property type="organism name" value="human"/>
</dbReference>
<dbReference type="AGR" id="HGNC:11998"/>
<dbReference type="CTD" id="7157"/>
<dbReference type="DisGeNET" id="7157"/>
<dbReference type="GeneCards" id="TP53"/>
<dbReference type="GeneReviews" id="TP53"/>
<dbReference type="HGNC" id="HGNC:11998">
    <property type="gene designation" value="TP53"/>
</dbReference>
<dbReference type="HPA" id="ENSG00000141510">
    <property type="expression patterns" value="Low tissue specificity"/>
</dbReference>
<dbReference type="MalaCards" id="TP53"/>
<dbReference type="MIM" id="133239">
    <property type="type" value="phenotype"/>
</dbReference>
<dbReference type="MIM" id="151623">
    <property type="type" value="phenotype"/>
</dbReference>
<dbReference type="MIM" id="191170">
    <property type="type" value="gene+phenotype"/>
</dbReference>
<dbReference type="MIM" id="202300">
    <property type="type" value="phenotype"/>
</dbReference>
<dbReference type="MIM" id="211980">
    <property type="type" value="phenotype"/>
</dbReference>
<dbReference type="MIM" id="260500">
    <property type="type" value="phenotype"/>
</dbReference>
<dbReference type="MIM" id="275355">
    <property type="type" value="phenotype"/>
</dbReference>
<dbReference type="MIM" id="614740">
    <property type="type" value="phenotype"/>
</dbReference>
<dbReference type="MIM" id="618165">
    <property type="type" value="phenotype"/>
</dbReference>
<dbReference type="neXtProt" id="NX_P04637"/>
<dbReference type="OpenTargets" id="ENSG00000141510"/>
<dbReference type="Orphanet" id="1501">
    <property type="disease" value="Adrenocortical carcinoma"/>
</dbReference>
<dbReference type="Orphanet" id="210159">
    <property type="disease" value="Adult hepatocellular carcinoma"/>
</dbReference>
<dbReference type="Orphanet" id="99756">
    <property type="disease" value="Alveolar rhabdomyosarcoma"/>
</dbReference>
<dbReference type="Orphanet" id="67038">
    <property type="disease" value="B-cell chronic lymphocytic leukemia"/>
</dbReference>
<dbReference type="Orphanet" id="585909">
    <property type="disease" value="B-lymphoblastic leukemia/lymphoma with t(9;22)(q34.1;q11.2)"/>
</dbReference>
<dbReference type="Orphanet" id="251899">
    <property type="disease" value="Choroid plexus carcinoma"/>
</dbReference>
<dbReference type="Orphanet" id="96253">
    <property type="disease" value="Cushing disease"/>
</dbReference>
<dbReference type="Orphanet" id="99757">
    <property type="disease" value="Embryonal rhabdomyosarcoma"/>
</dbReference>
<dbReference type="Orphanet" id="3318">
    <property type="disease" value="Essential thrombocythemia"/>
</dbReference>
<dbReference type="Orphanet" id="1333">
    <property type="disease" value="Familial pancreatic carcinoma"/>
</dbReference>
<dbReference type="Orphanet" id="251579">
    <property type="disease" value="Giant cell glioblastoma"/>
</dbReference>
<dbReference type="Orphanet" id="251576">
    <property type="disease" value="Gliosarcoma"/>
</dbReference>
<dbReference type="Orphanet" id="145">
    <property type="disease" value="Hereditary breast and/or ovarian cancer syndrome"/>
</dbReference>
<dbReference type="Orphanet" id="524">
    <property type="disease" value="Li-Fraumeni syndrome"/>
</dbReference>
<dbReference type="Orphanet" id="52688">
    <property type="disease" value="Myelodysplastic syndrome"/>
</dbReference>
<dbReference type="Orphanet" id="668">
    <property type="disease" value="Osteosarcoma"/>
</dbReference>
<dbReference type="Orphanet" id="2807">
    <property type="disease" value="Papilloma of choroid plexus"/>
</dbReference>
<dbReference type="Orphanet" id="293199">
    <property type="disease" value="Pleomorphic rhabdomyosarcoma"/>
</dbReference>
<dbReference type="Orphanet" id="70573">
    <property type="disease" value="Small cell lung cancer"/>
</dbReference>
<dbReference type="PharmGKB" id="PA36679"/>
<dbReference type="VEuPathDB" id="HostDB:ENSG00000141510"/>
<dbReference type="eggNOG" id="ENOG502QVY3">
    <property type="taxonomic scope" value="Eukaryota"/>
</dbReference>
<dbReference type="GeneTree" id="ENSGT00950000183153"/>
<dbReference type="InParanoid" id="P04637"/>
<dbReference type="OMA" id="HKKGEPC"/>
<dbReference type="OrthoDB" id="5915660at2759"/>
<dbReference type="PAN-GO" id="P04637">
    <property type="GO annotations" value="3 GO annotations based on evolutionary models"/>
</dbReference>
<dbReference type="PhylomeDB" id="P04637"/>
<dbReference type="TreeFam" id="TF106101"/>
<dbReference type="PathwayCommons" id="P04637"/>
<dbReference type="Reactome" id="R-HSA-111448">
    <property type="pathway name" value="Activation of NOXA and translocation to mitochondria"/>
</dbReference>
<dbReference type="Reactome" id="R-HSA-139915">
    <property type="pathway name" value="Activation of PUMA and translocation to mitochondria"/>
</dbReference>
<dbReference type="Reactome" id="R-HSA-1912408">
    <property type="pathway name" value="Pre-NOTCH Transcription and Translation"/>
</dbReference>
<dbReference type="Reactome" id="R-HSA-2559580">
    <property type="pathway name" value="Oxidative Stress Induced Senescence"/>
</dbReference>
<dbReference type="Reactome" id="R-HSA-2559584">
    <property type="pathway name" value="Formation of Senescence-Associated Heterochromatin Foci (SAHF)"/>
</dbReference>
<dbReference type="Reactome" id="R-HSA-2559585">
    <property type="pathway name" value="Oncogene Induced Senescence"/>
</dbReference>
<dbReference type="Reactome" id="R-HSA-2559586">
    <property type="pathway name" value="DNA Damage/Telomere Stress Induced Senescence"/>
</dbReference>
<dbReference type="Reactome" id="R-HSA-3232118">
    <property type="pathway name" value="SUMOylation of transcription factors"/>
</dbReference>
<dbReference type="Reactome" id="R-HSA-349425">
    <property type="pathway name" value="Autodegradation of the E3 ubiquitin ligase COP1"/>
</dbReference>
<dbReference type="Reactome" id="R-HSA-390471">
    <property type="pathway name" value="Association of TriC/CCT with target proteins during biosynthesis"/>
</dbReference>
<dbReference type="Reactome" id="R-HSA-5620971">
    <property type="pathway name" value="Pyroptosis"/>
</dbReference>
<dbReference type="Reactome" id="R-HSA-5628897">
    <property type="pathway name" value="TP53 Regulates Metabolic Genes"/>
</dbReference>
<dbReference type="Reactome" id="R-HSA-5689880">
    <property type="pathway name" value="Ub-specific processing proteases"/>
</dbReference>
<dbReference type="Reactome" id="R-HSA-5689896">
    <property type="pathway name" value="Ovarian tumor domain proteases"/>
</dbReference>
<dbReference type="Reactome" id="R-HSA-5693565">
    <property type="pathway name" value="Recruitment and ATM-mediated phosphorylation of repair and signaling proteins at DNA double strand breaks"/>
</dbReference>
<dbReference type="Reactome" id="R-HSA-6785807">
    <property type="pathway name" value="Interleukin-4 and Interleukin-13 signaling"/>
</dbReference>
<dbReference type="Reactome" id="R-HSA-6796648">
    <property type="pathway name" value="TP53 Regulates Transcription of DNA Repair Genes"/>
</dbReference>
<dbReference type="Reactome" id="R-HSA-6803204">
    <property type="pathway name" value="TP53 Regulates Transcription of Genes Involved in Cytochrome C Release"/>
</dbReference>
<dbReference type="Reactome" id="R-HSA-6803205">
    <property type="pathway name" value="TP53 regulates transcription of several additional cell death genes whose specific roles in p53-dependent apoptosis remain uncertain"/>
</dbReference>
<dbReference type="Reactome" id="R-HSA-6803207">
    <property type="pathway name" value="TP53 Regulates Transcription of Caspase Activators and Caspases"/>
</dbReference>
<dbReference type="Reactome" id="R-HSA-6803211">
    <property type="pathway name" value="TP53 Regulates Transcription of Death Receptors and Ligands"/>
</dbReference>
<dbReference type="Reactome" id="R-HSA-6804114">
    <property type="pathway name" value="TP53 Regulates Transcription of Genes Involved in G2 Cell Cycle Arrest"/>
</dbReference>
<dbReference type="Reactome" id="R-HSA-6804115">
    <property type="pathway name" value="TP53 regulates transcription of additional cell cycle genes whose exact role in the p53 pathway remain uncertain"/>
</dbReference>
<dbReference type="Reactome" id="R-HSA-6804116">
    <property type="pathway name" value="TP53 Regulates Transcription of Genes Involved in G1 Cell Cycle Arrest"/>
</dbReference>
<dbReference type="Reactome" id="R-HSA-6804754">
    <property type="pathway name" value="Regulation of TP53 Expression"/>
</dbReference>
<dbReference type="Reactome" id="R-HSA-6804756">
    <property type="pathway name" value="Regulation of TP53 Activity through Phosphorylation"/>
</dbReference>
<dbReference type="Reactome" id="R-HSA-6804757">
    <property type="pathway name" value="Regulation of TP53 Degradation"/>
</dbReference>
<dbReference type="Reactome" id="R-HSA-6804758">
    <property type="pathway name" value="Regulation of TP53 Activity through Acetylation"/>
</dbReference>
<dbReference type="Reactome" id="R-HSA-6804759">
    <property type="pathway name" value="Regulation of TP53 Activity through Association with Co-factors"/>
</dbReference>
<dbReference type="Reactome" id="R-HSA-6804760">
    <property type="pathway name" value="Regulation of TP53 Activity through Methylation"/>
</dbReference>
<dbReference type="Reactome" id="R-HSA-6811555">
    <property type="pathway name" value="PI5P Regulates TP53 Acetylation"/>
</dbReference>
<dbReference type="Reactome" id="R-HSA-69473">
    <property type="pathway name" value="G2/M DNA damage checkpoint"/>
</dbReference>
<dbReference type="Reactome" id="R-HSA-69481">
    <property type="pathway name" value="G2/M Checkpoints"/>
</dbReference>
<dbReference type="Reactome" id="R-HSA-69541">
    <property type="pathway name" value="Stabilization of p53"/>
</dbReference>
<dbReference type="Reactome" id="R-HSA-69895">
    <property type="pathway name" value="Transcriptional activation of cell cycle inhibitor p21"/>
</dbReference>
<dbReference type="Reactome" id="R-HSA-8852276">
    <property type="pathway name" value="The role of GTSE1 in G2/M progression after G2 checkpoint"/>
</dbReference>
<dbReference type="Reactome" id="R-HSA-8853884">
    <property type="pathway name" value="Transcriptional Regulation by VENTX"/>
</dbReference>
<dbReference type="Reactome" id="R-HSA-8941855">
    <property type="pathway name" value="RUNX3 regulates CDKN1A transcription"/>
</dbReference>
<dbReference type="Reactome" id="R-HSA-8943724">
    <property type="pathway name" value="Regulation of PTEN gene transcription"/>
</dbReference>
<dbReference type="Reactome" id="R-HSA-9723905">
    <property type="pathway name" value="Loss of function of TP53 in cancer due to loss of tetramerization ability"/>
</dbReference>
<dbReference type="Reactome" id="R-HSA-9725370">
    <property type="pathway name" value="Signaling by ALK fusions and activated point mutants"/>
</dbReference>
<dbReference type="Reactome" id="R-HSA-9758274">
    <property type="pathway name" value="Regulation of NF-kappa B signaling"/>
</dbReference>
<dbReference type="Reactome" id="R-HSA-9819196">
    <property type="pathway name" value="Zygotic genome activation (ZGA)"/>
</dbReference>
<dbReference type="Reactome" id="R-HSA-983231">
    <property type="pathway name" value="Factors involved in megakaryocyte development and platelet production"/>
</dbReference>
<dbReference type="Reactome" id="R-HSA-9833482">
    <property type="pathway name" value="PKR-mediated signaling"/>
</dbReference>
<dbReference type="SABIO-RK" id="P04637"/>
<dbReference type="SignaLink" id="P04637"/>
<dbReference type="SIGNOR" id="P04637"/>
<dbReference type="BioGRID-ORCS" id="7157">
    <property type="hits" value="66 hits in 1218 CRISPR screens"/>
</dbReference>
<dbReference type="CD-CODE" id="1A18FFC4">
    <property type="entry name" value="Paraspeckle"/>
</dbReference>
<dbReference type="CD-CODE" id="8C2F96ED">
    <property type="entry name" value="Centrosome"/>
</dbReference>
<dbReference type="CD-CODE" id="91857CE7">
    <property type="entry name" value="Nucleolus"/>
</dbReference>
<dbReference type="CD-CODE" id="A1A97FAB">
    <property type="entry name" value="Synthetic Condensate 000191"/>
</dbReference>
<dbReference type="CD-CODE" id="B5B9A610">
    <property type="entry name" value="PML body"/>
</dbReference>
<dbReference type="CD-CODE" id="E11B6BAB">
    <property type="entry name" value="Synthetic Condensate 000195"/>
</dbReference>
<dbReference type="ChiTaRS" id="TP53">
    <property type="organism name" value="human"/>
</dbReference>
<dbReference type="EvolutionaryTrace" id="P04637"/>
<dbReference type="GeneWiki" id="P53"/>
<dbReference type="GenomeRNAi" id="7157"/>
<dbReference type="Pharos" id="P04637">
    <property type="development level" value="Tchem"/>
</dbReference>
<dbReference type="PRO" id="PR:P04637"/>
<dbReference type="Proteomes" id="UP000005640">
    <property type="component" value="Chromosome 17"/>
</dbReference>
<dbReference type="RNAct" id="P04637">
    <property type="molecule type" value="protein"/>
</dbReference>
<dbReference type="Bgee" id="ENSG00000141510">
    <property type="expression patterns" value="Expressed in ventricular zone and 144 other cell types or tissues"/>
</dbReference>
<dbReference type="ExpressionAtlas" id="P04637">
    <property type="expression patterns" value="baseline and differential"/>
</dbReference>
<dbReference type="GO" id="GO:0005813">
    <property type="term" value="C:centrosome"/>
    <property type="evidence" value="ECO:0000314"/>
    <property type="project" value="UniProtKB"/>
</dbReference>
<dbReference type="GO" id="GO:0000785">
    <property type="term" value="C:chromatin"/>
    <property type="evidence" value="ECO:0000314"/>
    <property type="project" value="BHF-UCL"/>
</dbReference>
<dbReference type="GO" id="GO:0005737">
    <property type="term" value="C:cytoplasm"/>
    <property type="evidence" value="ECO:0000314"/>
    <property type="project" value="UniProtKB"/>
</dbReference>
<dbReference type="GO" id="GO:0005829">
    <property type="term" value="C:cytosol"/>
    <property type="evidence" value="ECO:0000314"/>
    <property type="project" value="HPA"/>
</dbReference>
<dbReference type="GO" id="GO:0005783">
    <property type="term" value="C:endoplasmic reticulum"/>
    <property type="evidence" value="ECO:0007669"/>
    <property type="project" value="UniProtKB-SubCell"/>
</dbReference>
<dbReference type="GO" id="GO:0043073">
    <property type="term" value="C:germ cell nucleus"/>
    <property type="evidence" value="ECO:0007669"/>
    <property type="project" value="Ensembl"/>
</dbReference>
<dbReference type="GO" id="GO:0005759">
    <property type="term" value="C:mitochondrial matrix"/>
    <property type="evidence" value="ECO:0007669"/>
    <property type="project" value="UniProtKB-SubCell"/>
</dbReference>
<dbReference type="GO" id="GO:0005739">
    <property type="term" value="C:mitochondrion"/>
    <property type="evidence" value="ECO:0000314"/>
    <property type="project" value="UniProtKB"/>
</dbReference>
<dbReference type="GO" id="GO:0016363">
    <property type="term" value="C:nuclear matrix"/>
    <property type="evidence" value="ECO:0000314"/>
    <property type="project" value="UniProtKB"/>
</dbReference>
<dbReference type="GO" id="GO:0005730">
    <property type="term" value="C:nucleolus"/>
    <property type="evidence" value="ECO:0000314"/>
    <property type="project" value="UniProtKB"/>
</dbReference>
<dbReference type="GO" id="GO:0005654">
    <property type="term" value="C:nucleoplasm"/>
    <property type="evidence" value="ECO:0000314"/>
    <property type="project" value="HPA"/>
</dbReference>
<dbReference type="GO" id="GO:0005634">
    <property type="term" value="C:nucleus"/>
    <property type="evidence" value="ECO:0000314"/>
    <property type="project" value="UniProtKB"/>
</dbReference>
<dbReference type="GO" id="GO:0016605">
    <property type="term" value="C:PML body"/>
    <property type="evidence" value="ECO:0000314"/>
    <property type="project" value="UniProtKB"/>
</dbReference>
<dbReference type="GO" id="GO:0032991">
    <property type="term" value="C:protein-containing complex"/>
    <property type="evidence" value="ECO:0000314"/>
    <property type="project" value="CAFA"/>
</dbReference>
<dbReference type="GO" id="GO:0005657">
    <property type="term" value="C:replication fork"/>
    <property type="evidence" value="ECO:0007669"/>
    <property type="project" value="Ensembl"/>
</dbReference>
<dbReference type="GO" id="GO:0035861">
    <property type="term" value="C:site of double-strand break"/>
    <property type="evidence" value="ECO:0007669"/>
    <property type="project" value="Ensembl"/>
</dbReference>
<dbReference type="GO" id="GO:0005667">
    <property type="term" value="C:transcription regulator complex"/>
    <property type="evidence" value="ECO:0000316"/>
    <property type="project" value="ARUK-UCL"/>
</dbReference>
<dbReference type="GO" id="GO:0017053">
    <property type="term" value="C:transcription repressor complex"/>
    <property type="evidence" value="ECO:0000353"/>
    <property type="project" value="ComplexPortal"/>
</dbReference>
<dbReference type="GO" id="GO:0071889">
    <property type="term" value="F:14-3-3 protein binding"/>
    <property type="evidence" value="ECO:0000269"/>
    <property type="project" value="DisProt"/>
</dbReference>
<dbReference type="GO" id="GO:0036310">
    <property type="term" value="F:ATP-dependent DNA/DNA annealing activity"/>
    <property type="evidence" value="ECO:0000314"/>
    <property type="project" value="UniProtKB"/>
</dbReference>
<dbReference type="GO" id="GO:0003682">
    <property type="term" value="F:chromatin binding"/>
    <property type="evidence" value="ECO:0000314"/>
    <property type="project" value="UniProtKB"/>
</dbReference>
<dbReference type="GO" id="GO:0000987">
    <property type="term" value="F:cis-regulatory region sequence-specific DNA binding"/>
    <property type="evidence" value="ECO:0000314"/>
    <property type="project" value="ARUK-UCL"/>
</dbReference>
<dbReference type="GO" id="GO:0005507">
    <property type="term" value="F:copper ion binding"/>
    <property type="evidence" value="ECO:0000314"/>
    <property type="project" value="UniProtKB"/>
</dbReference>
<dbReference type="GO" id="GO:0001046">
    <property type="term" value="F:core promoter sequence-specific DNA binding"/>
    <property type="evidence" value="ECO:0000314"/>
    <property type="project" value="CAFA"/>
</dbReference>
<dbReference type="GO" id="GO:0097718">
    <property type="term" value="F:disordered domain specific binding"/>
    <property type="evidence" value="ECO:0000353"/>
    <property type="project" value="CAFA"/>
</dbReference>
<dbReference type="GO" id="GO:0003677">
    <property type="term" value="F:DNA binding"/>
    <property type="evidence" value="ECO:0000314"/>
    <property type="project" value="UniProtKB"/>
</dbReference>
<dbReference type="GO" id="GO:0001228">
    <property type="term" value="F:DNA-binding transcription activator activity, RNA polymerase II-specific"/>
    <property type="evidence" value="ECO:0000314"/>
    <property type="project" value="GO_Central"/>
</dbReference>
<dbReference type="GO" id="GO:0003700">
    <property type="term" value="F:DNA-binding transcription factor activity"/>
    <property type="evidence" value="ECO:0000314"/>
    <property type="project" value="UniProtKB"/>
</dbReference>
<dbReference type="GO" id="GO:0000981">
    <property type="term" value="F:DNA-binding transcription factor activity, RNA polymerase II-specific"/>
    <property type="evidence" value="ECO:0000314"/>
    <property type="project" value="UniProtKB"/>
</dbReference>
<dbReference type="GO" id="GO:0001227">
    <property type="term" value="F:DNA-binding transcription repressor activity, RNA polymerase II-specific"/>
    <property type="evidence" value="ECO:0000314"/>
    <property type="project" value="ARUK-UCL"/>
</dbReference>
<dbReference type="GO" id="GO:0019899">
    <property type="term" value="F:enzyme binding"/>
    <property type="evidence" value="ECO:0000353"/>
    <property type="project" value="BHF-UCL"/>
</dbReference>
<dbReference type="GO" id="GO:0140296">
    <property type="term" value="F:general transcription initiation factor binding"/>
    <property type="evidence" value="ECO:0000353"/>
    <property type="project" value="BHF-UCL"/>
</dbReference>
<dbReference type="GO" id="GO:0042826">
    <property type="term" value="F:histone deacetylase binding"/>
    <property type="evidence" value="ECO:0000353"/>
    <property type="project" value="CAFA"/>
</dbReference>
<dbReference type="GO" id="GO:0035033">
    <property type="term" value="F:histone deacetylase regulator activity"/>
    <property type="evidence" value="ECO:0007669"/>
    <property type="project" value="Ensembl"/>
</dbReference>
<dbReference type="GO" id="GO:0042802">
    <property type="term" value="F:identical protein binding"/>
    <property type="evidence" value="ECO:0000353"/>
    <property type="project" value="UniProtKB"/>
</dbReference>
<dbReference type="GO" id="GO:0097371">
    <property type="term" value="F:MDM2/MDM4 family protein binding"/>
    <property type="evidence" value="ECO:0007669"/>
    <property type="project" value="Ensembl"/>
</dbReference>
<dbReference type="GO" id="GO:0140693">
    <property type="term" value="F:molecular condensate scaffold activity"/>
    <property type="evidence" value="ECO:0000314"/>
    <property type="project" value="UniProtKB"/>
</dbReference>
<dbReference type="GO" id="GO:0140677">
    <property type="term" value="F:molecular function activator activity"/>
    <property type="evidence" value="ECO:0000353"/>
    <property type="project" value="DisProt"/>
</dbReference>
<dbReference type="GO" id="GO:0003730">
    <property type="term" value="F:mRNA 3'-UTR binding"/>
    <property type="evidence" value="ECO:0000314"/>
    <property type="project" value="CAFA"/>
</dbReference>
<dbReference type="GO" id="GO:0002039">
    <property type="term" value="F:p53 binding"/>
    <property type="evidence" value="ECO:0000353"/>
    <property type="project" value="CAFA"/>
</dbReference>
<dbReference type="GO" id="GO:1990841">
    <property type="term" value="F:promoter-specific chromatin binding"/>
    <property type="evidence" value="ECO:0000314"/>
    <property type="project" value="UniProtKB"/>
</dbReference>
<dbReference type="GO" id="GO:0002020">
    <property type="term" value="F:protease binding"/>
    <property type="evidence" value="ECO:0000353"/>
    <property type="project" value="UniProtKB"/>
</dbReference>
<dbReference type="GO" id="GO:0046982">
    <property type="term" value="F:protein heterodimerization activity"/>
    <property type="evidence" value="ECO:0000353"/>
    <property type="project" value="UniProtKB"/>
</dbReference>
<dbReference type="GO" id="GO:0051721">
    <property type="term" value="F:protein phosphatase 2A binding"/>
    <property type="evidence" value="ECO:0000353"/>
    <property type="project" value="UniProtKB"/>
</dbReference>
<dbReference type="GO" id="GO:0051087">
    <property type="term" value="F:protein-folding chaperone binding"/>
    <property type="evidence" value="ECO:0000353"/>
    <property type="project" value="UniProtKB"/>
</dbReference>
<dbReference type="GO" id="GO:0030971">
    <property type="term" value="F:receptor tyrosine kinase binding"/>
    <property type="evidence" value="ECO:0000353"/>
    <property type="project" value="BHF-UCL"/>
</dbReference>
<dbReference type="GO" id="GO:0000978">
    <property type="term" value="F:RNA polymerase II cis-regulatory region sequence-specific DNA binding"/>
    <property type="evidence" value="ECO:0000314"/>
    <property type="project" value="ARUK-UCL"/>
</dbReference>
<dbReference type="GO" id="GO:0061629">
    <property type="term" value="F:RNA polymerase II-specific DNA-binding transcription factor binding"/>
    <property type="evidence" value="ECO:0000353"/>
    <property type="project" value="UniProtKB"/>
</dbReference>
<dbReference type="GO" id="GO:0001094">
    <property type="term" value="F:TFIID-class transcription factor complex binding"/>
    <property type="evidence" value="ECO:0000353"/>
    <property type="project" value="ParkinsonsUK-UCL"/>
</dbReference>
<dbReference type="GO" id="GO:0000976">
    <property type="term" value="F:transcription cis-regulatory region binding"/>
    <property type="evidence" value="ECO:0000314"/>
    <property type="project" value="BHF-UCL"/>
</dbReference>
<dbReference type="GO" id="GO:0001223">
    <property type="term" value="F:transcription coactivator binding"/>
    <property type="evidence" value="ECO:0000353"/>
    <property type="project" value="BHF-UCL"/>
</dbReference>
<dbReference type="GO" id="GO:0031625">
    <property type="term" value="F:ubiquitin protein ligase binding"/>
    <property type="evidence" value="ECO:0000353"/>
    <property type="project" value="UniProtKB"/>
</dbReference>
<dbReference type="GO" id="GO:0008270">
    <property type="term" value="F:zinc ion binding"/>
    <property type="evidence" value="ECO:0000304"/>
    <property type="project" value="UniProtKB"/>
</dbReference>
<dbReference type="GO" id="GO:0006914">
    <property type="term" value="P:autophagy"/>
    <property type="evidence" value="ECO:0000315"/>
    <property type="project" value="CAFA"/>
</dbReference>
<dbReference type="GO" id="GO:0002326">
    <property type="term" value="P:B cell lineage commitment"/>
    <property type="evidence" value="ECO:0007669"/>
    <property type="project" value="Ensembl"/>
</dbReference>
<dbReference type="GO" id="GO:0048539">
    <property type="term" value="P:bone marrow development"/>
    <property type="evidence" value="ECO:0000315"/>
    <property type="project" value="UniProtKB"/>
</dbReference>
<dbReference type="GO" id="GO:0010659">
    <property type="term" value="P:cardiac muscle cell apoptotic process"/>
    <property type="evidence" value="ECO:0007669"/>
    <property type="project" value="Ensembl"/>
</dbReference>
<dbReference type="GO" id="GO:0060411">
    <property type="term" value="P:cardiac septum morphogenesis"/>
    <property type="evidence" value="ECO:0007669"/>
    <property type="project" value="Ensembl"/>
</dbReference>
<dbReference type="GO" id="GO:0072717">
    <property type="term" value="P:cellular response to actinomycin D"/>
    <property type="evidence" value="ECO:0000314"/>
    <property type="project" value="CAFA"/>
</dbReference>
<dbReference type="GO" id="GO:0071480">
    <property type="term" value="P:cellular response to gamma radiation"/>
    <property type="evidence" value="ECO:0000314"/>
    <property type="project" value="CAFA"/>
</dbReference>
<dbReference type="GO" id="GO:0042149">
    <property type="term" value="P:cellular response to glucose starvation"/>
    <property type="evidence" value="ECO:0000314"/>
    <property type="project" value="UniProtKB"/>
</dbReference>
<dbReference type="GO" id="GO:0071456">
    <property type="term" value="P:cellular response to hypoxia"/>
    <property type="evidence" value="ECO:0000270"/>
    <property type="project" value="UniProtKB"/>
</dbReference>
<dbReference type="GO" id="GO:0071479">
    <property type="term" value="P:cellular response to ionizing radiation"/>
    <property type="evidence" value="ECO:0000315"/>
    <property type="project" value="BHF-UCL"/>
</dbReference>
<dbReference type="GO" id="GO:0034644">
    <property type="term" value="P:cellular response to UV"/>
    <property type="evidence" value="ECO:0000314"/>
    <property type="project" value="CAFA"/>
</dbReference>
<dbReference type="GO" id="GO:0071494">
    <property type="term" value="P:cellular response to UV-C"/>
    <property type="evidence" value="ECO:0007669"/>
    <property type="project" value="Ensembl"/>
</dbReference>
<dbReference type="GO" id="GO:0071466">
    <property type="term" value="P:cellular response to xenobiotic stimulus"/>
    <property type="evidence" value="ECO:0000270"/>
    <property type="project" value="UniProtKB"/>
</dbReference>
<dbReference type="GO" id="GO:0090398">
    <property type="term" value="P:cellular senescence"/>
    <property type="evidence" value="ECO:0000315"/>
    <property type="project" value="GO_Central"/>
</dbReference>
<dbReference type="GO" id="GO:0021549">
    <property type="term" value="P:cerebellum development"/>
    <property type="evidence" value="ECO:0007669"/>
    <property type="project" value="Ensembl"/>
</dbReference>
<dbReference type="GO" id="GO:0051276">
    <property type="term" value="P:chromosome organization"/>
    <property type="evidence" value="ECO:0007669"/>
    <property type="project" value="Ensembl"/>
</dbReference>
<dbReference type="GO" id="GO:0048512">
    <property type="term" value="P:circadian behavior"/>
    <property type="evidence" value="ECO:0000250"/>
    <property type="project" value="UniProtKB"/>
</dbReference>
<dbReference type="GO" id="GO:0008340">
    <property type="term" value="P:determination of adult lifespan"/>
    <property type="evidence" value="ECO:0000250"/>
    <property type="project" value="BHF-UCL"/>
</dbReference>
<dbReference type="GO" id="GO:0006974">
    <property type="term" value="P:DNA damage response"/>
    <property type="evidence" value="ECO:0000314"/>
    <property type="project" value="UniProtKB"/>
</dbReference>
<dbReference type="GO" id="GO:0030330">
    <property type="term" value="P:DNA damage response, signal transduction by p53 class mediator"/>
    <property type="evidence" value="ECO:0000314"/>
    <property type="project" value="BHF-UCL"/>
</dbReference>
<dbReference type="GO" id="GO:0006302">
    <property type="term" value="P:double-strand break repair"/>
    <property type="evidence" value="ECO:0007669"/>
    <property type="project" value="Ensembl"/>
</dbReference>
<dbReference type="GO" id="GO:0048568">
    <property type="term" value="P:embryonic organ development"/>
    <property type="evidence" value="ECO:0007669"/>
    <property type="project" value="Ensembl"/>
</dbReference>
<dbReference type="GO" id="GO:0043153">
    <property type="term" value="P:entrainment of circadian clock by photoperiod"/>
    <property type="evidence" value="ECO:0000250"/>
    <property type="project" value="UniProtKB"/>
</dbReference>
<dbReference type="GO" id="GO:0006983">
    <property type="term" value="P:ER overload response"/>
    <property type="evidence" value="ECO:0000314"/>
    <property type="project" value="MGI"/>
</dbReference>
<dbReference type="GO" id="GO:0048144">
    <property type="term" value="P:fibroblast proliferation"/>
    <property type="evidence" value="ECO:0007669"/>
    <property type="project" value="Ensembl"/>
</dbReference>
<dbReference type="GO" id="GO:0007369">
    <property type="term" value="P:gastrulation"/>
    <property type="evidence" value="ECO:0007669"/>
    <property type="project" value="Ensembl"/>
</dbReference>
<dbReference type="GO" id="GO:0014009">
    <property type="term" value="P:glial cell proliferation"/>
    <property type="evidence" value="ECO:0007669"/>
    <property type="project" value="Ensembl"/>
</dbReference>
<dbReference type="GO" id="GO:0019661">
    <property type="term" value="P:glucose catabolic process to lactate via pyruvate"/>
    <property type="evidence" value="ECO:0007669"/>
    <property type="project" value="Ensembl"/>
</dbReference>
<dbReference type="GO" id="GO:0002244">
    <property type="term" value="P:hematopoietic progenitor cell differentiation"/>
    <property type="evidence" value="ECO:0000315"/>
    <property type="project" value="UniProtKB"/>
</dbReference>
<dbReference type="GO" id="GO:0060218">
    <property type="term" value="P:hematopoietic stem cell differentiation"/>
    <property type="evidence" value="ECO:0000315"/>
    <property type="project" value="UniProtKB"/>
</dbReference>
<dbReference type="GO" id="GO:0001701">
    <property type="term" value="P:in utero embryonic development"/>
    <property type="evidence" value="ECO:0007669"/>
    <property type="project" value="Ensembl"/>
</dbReference>
<dbReference type="GO" id="GO:0097193">
    <property type="term" value="P:intrinsic apoptotic signaling pathway"/>
    <property type="evidence" value="ECO:0000304"/>
    <property type="project" value="HGNC-UCL"/>
</dbReference>
<dbReference type="GO" id="GO:0072332">
    <property type="term" value="P:intrinsic apoptotic signaling pathway by p53 class mediator"/>
    <property type="evidence" value="ECO:0000315"/>
    <property type="project" value="UniProtKB"/>
</dbReference>
<dbReference type="GO" id="GO:0042771">
    <property type="term" value="P:intrinsic apoptotic signaling pathway in response to DNA damage by p53 class mediator"/>
    <property type="evidence" value="ECO:0000314"/>
    <property type="project" value="UniProtKB"/>
</dbReference>
<dbReference type="GO" id="GO:0070059">
    <property type="term" value="P:intrinsic apoptotic signaling pathway in response to endoplasmic reticulum stress"/>
    <property type="evidence" value="ECO:0007669"/>
    <property type="project" value="Ensembl"/>
</dbReference>
<dbReference type="GO" id="GO:1990144">
    <property type="term" value="P:intrinsic apoptotic signaling pathway in response to hypoxia"/>
    <property type="evidence" value="ECO:0007669"/>
    <property type="project" value="Ensembl"/>
</dbReference>
<dbReference type="GO" id="GO:0043504">
    <property type="term" value="P:mitochondrial DNA repair"/>
    <property type="evidence" value="ECO:0007669"/>
    <property type="project" value="Ensembl"/>
</dbReference>
<dbReference type="GO" id="GO:0000423">
    <property type="term" value="P:mitophagy"/>
    <property type="evidence" value="ECO:0007669"/>
    <property type="project" value="Ensembl"/>
</dbReference>
<dbReference type="GO" id="GO:0031571">
    <property type="term" value="P:mitotic G1 DNA damage checkpoint signaling"/>
    <property type="evidence" value="ECO:0000315"/>
    <property type="project" value="BHF-UCL"/>
</dbReference>
<dbReference type="GO" id="GO:0009299">
    <property type="term" value="P:mRNA transcription"/>
    <property type="evidence" value="ECO:0000315"/>
    <property type="project" value="UniProtKB"/>
</dbReference>
<dbReference type="GO" id="GO:0035264">
    <property type="term" value="P:multicellular organism growth"/>
    <property type="evidence" value="ECO:0007669"/>
    <property type="project" value="Ensembl"/>
</dbReference>
<dbReference type="GO" id="GO:0070266">
    <property type="term" value="P:necroptotic process"/>
    <property type="evidence" value="ECO:0007669"/>
    <property type="project" value="Ensembl"/>
</dbReference>
<dbReference type="GO" id="GO:0043066">
    <property type="term" value="P:negative regulation of apoptotic process"/>
    <property type="evidence" value="ECO:0000314"/>
    <property type="project" value="UniProtKB"/>
</dbReference>
<dbReference type="GO" id="GO:0030308">
    <property type="term" value="P:negative regulation of cell growth"/>
    <property type="evidence" value="ECO:0000315"/>
    <property type="project" value="UniProtKB"/>
</dbReference>
<dbReference type="GO" id="GO:0008285">
    <property type="term" value="P:negative regulation of cell population proliferation"/>
    <property type="evidence" value="ECO:0000314"/>
    <property type="project" value="CACAO"/>
</dbReference>
<dbReference type="GO" id="GO:0008156">
    <property type="term" value="P:negative regulation of DNA replication"/>
    <property type="evidence" value="ECO:0007669"/>
    <property type="project" value="Ensembl"/>
</dbReference>
<dbReference type="GO" id="GO:0045892">
    <property type="term" value="P:negative regulation of DNA-templated transcription"/>
    <property type="evidence" value="ECO:0000314"/>
    <property type="project" value="UniProtKB"/>
</dbReference>
<dbReference type="GO" id="GO:0048147">
    <property type="term" value="P:negative regulation of fibroblast proliferation"/>
    <property type="evidence" value="ECO:0000315"/>
    <property type="project" value="UniProtKB"/>
</dbReference>
<dbReference type="GO" id="GO:1903451">
    <property type="term" value="P:negative regulation of G1 to G0 transition"/>
    <property type="evidence" value="ECO:0000314"/>
    <property type="project" value="CAFA"/>
</dbReference>
<dbReference type="GO" id="GO:0060253">
    <property type="term" value="P:negative regulation of glial cell proliferation"/>
    <property type="evidence" value="ECO:0007669"/>
    <property type="project" value="Ensembl"/>
</dbReference>
<dbReference type="GO" id="GO:1904024">
    <property type="term" value="P:negative regulation of glucose catabolic process to lactate via pyruvate"/>
    <property type="evidence" value="ECO:0007669"/>
    <property type="project" value="Ensembl"/>
</dbReference>
<dbReference type="GO" id="GO:0051097">
    <property type="term" value="P:negative regulation of helicase activity"/>
    <property type="evidence" value="ECO:0000304"/>
    <property type="project" value="UniProtKB"/>
</dbReference>
<dbReference type="GO" id="GO:1903799">
    <property type="term" value="P:negative regulation of miRNA processing"/>
    <property type="evidence" value="ECO:0007669"/>
    <property type="project" value="Ensembl"/>
</dbReference>
<dbReference type="GO" id="GO:1901525">
    <property type="term" value="P:negative regulation of mitophagy"/>
    <property type="evidence" value="ECO:0007669"/>
    <property type="project" value="Ensembl"/>
</dbReference>
<dbReference type="GO" id="GO:0007406">
    <property type="term" value="P:negative regulation of neuroblast proliferation"/>
    <property type="evidence" value="ECO:0007669"/>
    <property type="project" value="Ensembl"/>
</dbReference>
<dbReference type="GO" id="GO:1905856">
    <property type="term" value="P:negative regulation of pentose-phosphate shunt"/>
    <property type="evidence" value="ECO:0000315"/>
    <property type="project" value="CACAO"/>
</dbReference>
<dbReference type="GO" id="GO:0045861">
    <property type="term" value="P:negative regulation of proteolysis"/>
    <property type="evidence" value="ECO:0007669"/>
    <property type="project" value="Ensembl"/>
</dbReference>
<dbReference type="GO" id="GO:2000378">
    <property type="term" value="P:negative regulation of reactive oxygen species metabolic process"/>
    <property type="evidence" value="ECO:0007669"/>
    <property type="project" value="Ensembl"/>
</dbReference>
<dbReference type="GO" id="GO:2000647">
    <property type="term" value="P:negative regulation of stem cell proliferation"/>
    <property type="evidence" value="ECO:0007669"/>
    <property type="project" value="Ensembl"/>
</dbReference>
<dbReference type="GO" id="GO:0032211">
    <property type="term" value="P:negative regulation of telomere maintenance via telomerase"/>
    <property type="evidence" value="ECO:0000314"/>
    <property type="project" value="BHF-UCL"/>
</dbReference>
<dbReference type="GO" id="GO:0000122">
    <property type="term" value="P:negative regulation of transcription by RNA polymerase II"/>
    <property type="evidence" value="ECO:0000314"/>
    <property type="project" value="ARUK-UCL"/>
</dbReference>
<dbReference type="GO" id="GO:0030512">
    <property type="term" value="P:negative regulation of transforming growth factor beta receptor signaling pathway"/>
    <property type="evidence" value="ECO:0007669"/>
    <property type="project" value="Ensembl"/>
</dbReference>
<dbReference type="GO" id="GO:0007405">
    <property type="term" value="P:neuroblast proliferation"/>
    <property type="evidence" value="ECO:0007669"/>
    <property type="project" value="Ensembl"/>
</dbReference>
<dbReference type="GO" id="GO:0051402">
    <property type="term" value="P:neuron apoptotic process"/>
    <property type="evidence" value="ECO:0007669"/>
    <property type="project" value="Ensembl"/>
</dbReference>
<dbReference type="GO" id="GO:0006289">
    <property type="term" value="P:nucleotide-excision repair"/>
    <property type="evidence" value="ECO:0000315"/>
    <property type="project" value="UniProtKB"/>
</dbReference>
<dbReference type="GO" id="GO:0097252">
    <property type="term" value="P:oligodendrocyte apoptotic process"/>
    <property type="evidence" value="ECO:0000314"/>
    <property type="project" value="UniProtKB"/>
</dbReference>
<dbReference type="GO" id="GO:0090403">
    <property type="term" value="P:oxidative stress-induced premature senescence"/>
    <property type="evidence" value="ECO:0000315"/>
    <property type="project" value="BHF-UCL"/>
</dbReference>
<dbReference type="GO" id="GO:0043065">
    <property type="term" value="P:positive regulation of apoptotic process"/>
    <property type="evidence" value="ECO:0000314"/>
    <property type="project" value="UniProtKB"/>
</dbReference>
<dbReference type="GO" id="GO:0010666">
    <property type="term" value="P:positive regulation of cardiac muscle cell apoptotic process"/>
    <property type="evidence" value="ECO:0007669"/>
    <property type="project" value="Ensembl"/>
</dbReference>
<dbReference type="GO" id="GO:2000774">
    <property type="term" value="P:positive regulation of cellular senescence"/>
    <property type="evidence" value="ECO:0000314"/>
    <property type="project" value="UniProt"/>
</dbReference>
<dbReference type="GO" id="GO:0045893">
    <property type="term" value="P:positive regulation of DNA-templated transcription"/>
    <property type="evidence" value="ECO:0000314"/>
    <property type="project" value="UniProtKB"/>
</dbReference>
<dbReference type="GO" id="GO:1900119">
    <property type="term" value="P:positive regulation of execution phase of apoptosis"/>
    <property type="evidence" value="ECO:0000315"/>
    <property type="project" value="AgBase"/>
</dbReference>
<dbReference type="GO" id="GO:0010628">
    <property type="term" value="P:positive regulation of gene expression"/>
    <property type="evidence" value="ECO:0000314"/>
    <property type="project" value="CAFA"/>
</dbReference>
<dbReference type="GO" id="GO:2001244">
    <property type="term" value="P:positive regulation of intrinsic apoptotic signaling pathway"/>
    <property type="evidence" value="ECO:0000315"/>
    <property type="project" value="UniProtKB"/>
</dbReference>
<dbReference type="GO" id="GO:1902895">
    <property type="term" value="P:positive regulation of miRNA transcription"/>
    <property type="evidence" value="ECO:0000314"/>
    <property type="project" value="BHF-UCL"/>
</dbReference>
<dbReference type="GO" id="GO:0035794">
    <property type="term" value="P:positive regulation of mitochondrial membrane permeability"/>
    <property type="evidence" value="ECO:0007669"/>
    <property type="project" value="Ensembl"/>
</dbReference>
<dbReference type="GO" id="GO:0043525">
    <property type="term" value="P:positive regulation of neuron apoptotic process"/>
    <property type="evidence" value="ECO:0007669"/>
    <property type="project" value="Ensembl"/>
</dbReference>
<dbReference type="GO" id="GO:0062100">
    <property type="term" value="P:positive regulation of programmed necrotic cell death"/>
    <property type="evidence" value="ECO:0007669"/>
    <property type="project" value="Ensembl"/>
</dbReference>
<dbReference type="GO" id="GO:2000379">
    <property type="term" value="P:positive regulation of reactive oxygen species metabolic process"/>
    <property type="evidence" value="ECO:0000315"/>
    <property type="project" value="BHF-UCL"/>
</dbReference>
<dbReference type="GO" id="GO:0090200">
    <property type="term" value="P:positive regulation of release of cytochrome c from mitochondria"/>
    <property type="evidence" value="ECO:0000314"/>
    <property type="project" value="UniProtKB"/>
</dbReference>
<dbReference type="GO" id="GO:0045899">
    <property type="term" value="P:positive regulation of RNA polymerase II transcription preinitiation complex assembly"/>
    <property type="evidence" value="ECO:0000314"/>
    <property type="project" value="BHF-UCL"/>
</dbReference>
<dbReference type="GO" id="GO:0070245">
    <property type="term" value="P:positive regulation of thymocyte apoptotic process"/>
    <property type="evidence" value="ECO:0000250"/>
    <property type="project" value="BHF-UCL"/>
</dbReference>
<dbReference type="GO" id="GO:0045944">
    <property type="term" value="P:positive regulation of transcription by RNA polymerase II"/>
    <property type="evidence" value="ECO:0000314"/>
    <property type="project" value="UniProtKB"/>
</dbReference>
<dbReference type="GO" id="GO:0006606">
    <property type="term" value="P:protein import into nucleus"/>
    <property type="evidence" value="ECO:0007669"/>
    <property type="project" value="Ensembl"/>
</dbReference>
<dbReference type="GO" id="GO:0008104">
    <property type="term" value="P:protein localization"/>
    <property type="evidence" value="ECO:0000314"/>
    <property type="project" value="UniProtKB"/>
</dbReference>
<dbReference type="GO" id="GO:0050821">
    <property type="term" value="P:protein stabilization"/>
    <property type="evidence" value="ECO:0007669"/>
    <property type="project" value="Ensembl"/>
</dbReference>
<dbReference type="GO" id="GO:0051262">
    <property type="term" value="P:protein tetramerization"/>
    <property type="evidence" value="ECO:0007669"/>
    <property type="project" value="InterPro"/>
</dbReference>
<dbReference type="GO" id="GO:0065003">
    <property type="term" value="P:protein-containing complex assembly"/>
    <property type="evidence" value="ECO:0000314"/>
    <property type="project" value="UniProtKB"/>
</dbReference>
<dbReference type="GO" id="GO:0007265">
    <property type="term" value="P:Ras protein signal transduction"/>
    <property type="evidence" value="ECO:0000270"/>
    <property type="project" value="BHF-UCL"/>
</dbReference>
<dbReference type="GO" id="GO:0072593">
    <property type="term" value="P:reactive oxygen species metabolic process"/>
    <property type="evidence" value="ECO:0007669"/>
    <property type="project" value="Ensembl"/>
</dbReference>
<dbReference type="GO" id="GO:0042981">
    <property type="term" value="P:regulation of apoptotic process"/>
    <property type="evidence" value="ECO:0000314"/>
    <property type="project" value="MGI"/>
</dbReference>
<dbReference type="GO" id="GO:0051726">
    <property type="term" value="P:regulation of cell cycle"/>
    <property type="evidence" value="ECO:0000314"/>
    <property type="project" value="BHF-UCL"/>
</dbReference>
<dbReference type="GO" id="GO:1902749">
    <property type="term" value="P:regulation of cell cycle G2/M phase transition"/>
    <property type="evidence" value="ECO:0000315"/>
    <property type="project" value="UniProtKB"/>
</dbReference>
<dbReference type="GO" id="GO:0043516">
    <property type="term" value="P:regulation of DNA damage response, signal transduction by p53 class mediator"/>
    <property type="evidence" value="ECO:0007669"/>
    <property type="project" value="Ensembl"/>
</dbReference>
<dbReference type="GO" id="GO:0006355">
    <property type="term" value="P:regulation of DNA-templated transcription"/>
    <property type="evidence" value="ECO:0000314"/>
    <property type="project" value="UniProtKB"/>
</dbReference>
<dbReference type="GO" id="GO:2000269">
    <property type="term" value="P:regulation of fibroblast apoptotic process"/>
    <property type="evidence" value="ECO:0007669"/>
    <property type="project" value="Ensembl"/>
</dbReference>
<dbReference type="GO" id="GO:1902253">
    <property type="term" value="P:regulation of intrinsic apoptotic signaling pathway by p53 class mediator"/>
    <property type="evidence" value="ECO:0007669"/>
    <property type="project" value="Ensembl"/>
</dbReference>
<dbReference type="GO" id="GO:1902108">
    <property type="term" value="P:regulation of mitochondrial membrane permeability involved in apoptotic process"/>
    <property type="evidence" value="ECO:0007669"/>
    <property type="project" value="Ensembl"/>
</dbReference>
<dbReference type="GO" id="GO:0034103">
    <property type="term" value="P:regulation of tissue remodeling"/>
    <property type="evidence" value="ECO:0007669"/>
    <property type="project" value="Ensembl"/>
</dbReference>
<dbReference type="GO" id="GO:0006357">
    <property type="term" value="P:regulation of transcription by RNA polymerase II"/>
    <property type="evidence" value="ECO:0000314"/>
    <property type="project" value="ARUK-UCL"/>
</dbReference>
<dbReference type="GO" id="GO:0001836">
    <property type="term" value="P:release of cytochrome c from mitochondria"/>
    <property type="evidence" value="ECO:0007669"/>
    <property type="project" value="Ensembl"/>
</dbReference>
<dbReference type="GO" id="GO:0090399">
    <property type="term" value="P:replicative senescence"/>
    <property type="evidence" value="ECO:0000315"/>
    <property type="project" value="BHF-UCL"/>
</dbReference>
<dbReference type="GO" id="GO:0046677">
    <property type="term" value="P:response to antibiotic"/>
    <property type="evidence" value="ECO:0000270"/>
    <property type="project" value="UniProtKB"/>
</dbReference>
<dbReference type="GO" id="GO:0010332">
    <property type="term" value="P:response to gamma radiation"/>
    <property type="evidence" value="ECO:0000315"/>
    <property type="project" value="BHF-UCL"/>
</dbReference>
<dbReference type="GO" id="GO:0002931">
    <property type="term" value="P:response to ischemia"/>
    <property type="evidence" value="ECO:0007669"/>
    <property type="project" value="Ensembl"/>
</dbReference>
<dbReference type="GO" id="GO:0009651">
    <property type="term" value="P:response to salt stress"/>
    <property type="evidence" value="ECO:0007669"/>
    <property type="project" value="Ensembl"/>
</dbReference>
<dbReference type="GO" id="GO:0010165">
    <property type="term" value="P:response to X-ray"/>
    <property type="evidence" value="ECO:0007669"/>
    <property type="project" value="Ensembl"/>
</dbReference>
<dbReference type="GO" id="GO:0009303">
    <property type="term" value="P:rRNA transcription"/>
    <property type="evidence" value="ECO:0007669"/>
    <property type="project" value="Ensembl"/>
</dbReference>
<dbReference type="GO" id="GO:0072331">
    <property type="term" value="P:signal transduction by p53 class mediator"/>
    <property type="evidence" value="ECO:0000314"/>
    <property type="project" value="CAFA"/>
</dbReference>
<dbReference type="GO" id="GO:0001756">
    <property type="term" value="P:somitogenesis"/>
    <property type="evidence" value="ECO:0007669"/>
    <property type="project" value="Ensembl"/>
</dbReference>
<dbReference type="GO" id="GO:0072089">
    <property type="term" value="P:stem cell proliferation"/>
    <property type="evidence" value="ECO:0007669"/>
    <property type="project" value="Ensembl"/>
</dbReference>
<dbReference type="GO" id="GO:0033077">
    <property type="term" value="P:T cell differentiation in thymus"/>
    <property type="evidence" value="ECO:0007669"/>
    <property type="project" value="Ensembl"/>
</dbReference>
<dbReference type="GO" id="GO:0002360">
    <property type="term" value="P:T cell lineage commitment"/>
    <property type="evidence" value="ECO:0007669"/>
    <property type="project" value="Ensembl"/>
</dbReference>
<dbReference type="GO" id="GO:0002309">
    <property type="term" value="P:T cell proliferation involved in immune response"/>
    <property type="evidence" value="ECO:0007669"/>
    <property type="project" value="Ensembl"/>
</dbReference>
<dbReference type="GO" id="GO:0070242">
    <property type="term" value="P:thymocyte apoptotic process"/>
    <property type="evidence" value="ECO:0007669"/>
    <property type="project" value="Ensembl"/>
</dbReference>
<dbReference type="GO" id="GO:0045815">
    <property type="term" value="P:transcription initiation-coupled chromatin remodeling"/>
    <property type="evidence" value="ECO:0000314"/>
    <property type="project" value="GO_Central"/>
</dbReference>
<dbReference type="GO" id="GO:0007179">
    <property type="term" value="P:transforming growth factor beta receptor signaling pathway"/>
    <property type="evidence" value="ECO:0007669"/>
    <property type="project" value="Ensembl"/>
</dbReference>
<dbReference type="GO" id="GO:0033209">
    <property type="term" value="P:tumor necrosis factor-mediated signaling pathway"/>
    <property type="evidence" value="ECO:0000316"/>
    <property type="project" value="BHF-UCL"/>
</dbReference>
<dbReference type="GO" id="GO:0060333">
    <property type="term" value="P:type II interferon-mediated signaling pathway"/>
    <property type="evidence" value="ECO:0007669"/>
    <property type="project" value="Ensembl"/>
</dbReference>
<dbReference type="GO" id="GO:0016032">
    <property type="term" value="P:viral process"/>
    <property type="evidence" value="ECO:0000315"/>
    <property type="project" value="CACAO"/>
</dbReference>
<dbReference type="CDD" id="cd08367">
    <property type="entry name" value="P53"/>
    <property type="match status" value="1"/>
</dbReference>
<dbReference type="DisProt" id="DP00086"/>
<dbReference type="FunFam" id="2.60.40.720:FF:000003">
    <property type="entry name" value="Cellular tumor antigen p53"/>
    <property type="match status" value="1"/>
</dbReference>
<dbReference type="FunFam" id="4.10.170.10:FF:000003">
    <property type="entry name" value="Cellular tumor antigen p53"/>
    <property type="match status" value="1"/>
</dbReference>
<dbReference type="Gene3D" id="2.60.40.720">
    <property type="match status" value="1"/>
</dbReference>
<dbReference type="Gene3D" id="6.10.50.20">
    <property type="match status" value="1"/>
</dbReference>
<dbReference type="Gene3D" id="4.10.170.10">
    <property type="entry name" value="p53-like tetramerisation domain"/>
    <property type="match status" value="1"/>
</dbReference>
<dbReference type="IDEAL" id="IID00015"/>
<dbReference type="InterPro" id="IPR008967">
    <property type="entry name" value="p53-like_TF_DNA-bd_sf"/>
</dbReference>
<dbReference type="InterPro" id="IPR012346">
    <property type="entry name" value="p53/RUNT-type_TF_DNA-bd_sf"/>
</dbReference>
<dbReference type="InterPro" id="IPR011615">
    <property type="entry name" value="p53_DNA-bd"/>
</dbReference>
<dbReference type="InterPro" id="IPR040926">
    <property type="entry name" value="p53_TAD2"/>
</dbReference>
<dbReference type="InterPro" id="IPR036674">
    <property type="entry name" value="p53_tetramer_sf"/>
</dbReference>
<dbReference type="InterPro" id="IPR010991">
    <property type="entry name" value="p53_tetrameristn"/>
</dbReference>
<dbReference type="InterPro" id="IPR013872">
    <property type="entry name" value="p53_transactivation_domain"/>
</dbReference>
<dbReference type="InterPro" id="IPR002117">
    <property type="entry name" value="p53_tumour_suppressor"/>
</dbReference>
<dbReference type="PANTHER" id="PTHR11447">
    <property type="entry name" value="CELLULAR TUMOR ANTIGEN P53"/>
    <property type="match status" value="1"/>
</dbReference>
<dbReference type="PANTHER" id="PTHR11447:SF6">
    <property type="entry name" value="CELLULAR TUMOR ANTIGEN P53"/>
    <property type="match status" value="1"/>
</dbReference>
<dbReference type="Pfam" id="PF00870">
    <property type="entry name" value="P53"/>
    <property type="match status" value="1"/>
</dbReference>
<dbReference type="Pfam" id="PF08563">
    <property type="entry name" value="P53_TAD"/>
    <property type="match status" value="1"/>
</dbReference>
<dbReference type="Pfam" id="PF07710">
    <property type="entry name" value="P53_tetramer"/>
    <property type="match status" value="1"/>
</dbReference>
<dbReference type="Pfam" id="PF18521">
    <property type="entry name" value="TAD2"/>
    <property type="match status" value="1"/>
</dbReference>
<dbReference type="PRINTS" id="PR00386">
    <property type="entry name" value="P53SUPPRESSR"/>
</dbReference>
<dbReference type="SUPFAM" id="SSF47719">
    <property type="entry name" value="p53 tetramerization domain"/>
    <property type="match status" value="1"/>
</dbReference>
<dbReference type="SUPFAM" id="SSF49417">
    <property type="entry name" value="p53-like transcription factors"/>
    <property type="match status" value="1"/>
</dbReference>
<dbReference type="PROSITE" id="PS00348">
    <property type="entry name" value="P53"/>
    <property type="match status" value="1"/>
</dbReference>
<accession>P04637</accession>
<accession>Q15086</accession>
<accession>Q15087</accession>
<accession>Q15088</accession>
<accession>Q16535</accession>
<accession>Q16807</accession>
<accession>Q16808</accession>
<accession>Q16809</accession>
<accession>Q16810</accession>
<accession>Q16811</accession>
<accession>Q16848</accession>
<accession>Q2XN98</accession>
<accession>Q3LRW1</accession>
<accession>Q3LRW2</accession>
<accession>Q3LRW3</accession>
<accession>Q3LRW4</accession>
<accession>Q3LRW5</accession>
<accession>Q86UG1</accession>
<accession>Q8J016</accession>
<accession>Q99659</accession>
<accession>Q9BTM4</accession>
<accession>Q9HAQ8</accession>
<accession>Q9NP68</accession>
<accession>Q9NPJ2</accession>
<accession>Q9NZD0</accession>
<accession>Q9UBI2</accession>
<accession>Q9UQ61</accession>